<evidence type="ECO:0000250" key="1"/>
<evidence type="ECO:0000250" key="2">
    <source>
        <dbReference type="UniProtKB" id="P42859"/>
    </source>
</evidence>
<evidence type="ECO:0000255" key="3"/>
<evidence type="ECO:0000256" key="4">
    <source>
        <dbReference type="SAM" id="MobiDB-lite"/>
    </source>
</evidence>
<evidence type="ECO:0000269" key="5">
    <source>
    </source>
</evidence>
<evidence type="ECO:0000269" key="6">
    <source>
    </source>
</evidence>
<evidence type="ECO:0000269" key="7">
    <source>
    </source>
</evidence>
<evidence type="ECO:0000269" key="8">
    <source>
    </source>
</evidence>
<evidence type="ECO:0000269" key="9">
    <source>
    </source>
</evidence>
<evidence type="ECO:0000269" key="10">
    <source>
    </source>
</evidence>
<evidence type="ECO:0000269" key="11">
    <source>
    </source>
</evidence>
<evidence type="ECO:0000269" key="12">
    <source>
    </source>
</evidence>
<evidence type="ECO:0000269" key="13">
    <source>
    </source>
</evidence>
<evidence type="ECO:0000269" key="14">
    <source>
    </source>
</evidence>
<evidence type="ECO:0000269" key="15">
    <source>
    </source>
</evidence>
<evidence type="ECO:0000269" key="16">
    <source>
    </source>
</evidence>
<evidence type="ECO:0000269" key="17">
    <source>
    </source>
</evidence>
<evidence type="ECO:0000269" key="18">
    <source>
    </source>
</evidence>
<evidence type="ECO:0000269" key="19">
    <source>
    </source>
</evidence>
<evidence type="ECO:0000269" key="20">
    <source>
    </source>
</evidence>
<evidence type="ECO:0000269" key="21">
    <source>
    </source>
</evidence>
<evidence type="ECO:0000269" key="22">
    <source>
    </source>
</evidence>
<evidence type="ECO:0000269" key="23">
    <source>
    </source>
</evidence>
<evidence type="ECO:0000269" key="24">
    <source>
    </source>
</evidence>
<evidence type="ECO:0000269" key="25">
    <source>
    </source>
</evidence>
<evidence type="ECO:0000269" key="26">
    <source>
    </source>
</evidence>
<evidence type="ECO:0000269" key="27">
    <source>
    </source>
</evidence>
<evidence type="ECO:0000269" key="28">
    <source>
    </source>
</evidence>
<evidence type="ECO:0000269" key="29">
    <source>
    </source>
</evidence>
<evidence type="ECO:0000269" key="30">
    <source>
    </source>
</evidence>
<evidence type="ECO:0000305" key="31"/>
<evidence type="ECO:0007744" key="32">
    <source>
        <dbReference type="PDB" id="2LD0"/>
    </source>
</evidence>
<evidence type="ECO:0007744" key="33">
    <source>
        <dbReference type="PDB" id="2LD2"/>
    </source>
</evidence>
<evidence type="ECO:0007744" key="34">
    <source>
        <dbReference type="PDB" id="3IO4"/>
    </source>
</evidence>
<evidence type="ECO:0007744" key="35">
    <source>
        <dbReference type="PDB" id="3IO6"/>
    </source>
</evidence>
<evidence type="ECO:0007744" key="36">
    <source>
        <dbReference type="PDB" id="3IOR"/>
    </source>
</evidence>
<evidence type="ECO:0007744" key="37">
    <source>
        <dbReference type="PDB" id="3IOT"/>
    </source>
</evidence>
<evidence type="ECO:0007744" key="38">
    <source>
        <dbReference type="PDB" id="3IOU"/>
    </source>
</evidence>
<evidence type="ECO:0007744" key="39">
    <source>
        <dbReference type="PDB" id="3IOV"/>
    </source>
</evidence>
<evidence type="ECO:0007744" key="40">
    <source>
        <dbReference type="PDB" id="3IOW"/>
    </source>
</evidence>
<evidence type="ECO:0007744" key="41">
    <source>
        <dbReference type="PDB" id="3LRH"/>
    </source>
</evidence>
<evidence type="ECO:0007744" key="42">
    <source>
        <dbReference type="PDB" id="4FE8"/>
    </source>
</evidence>
<evidence type="ECO:0007744" key="43">
    <source>
        <dbReference type="PDB" id="4FEB"/>
    </source>
</evidence>
<evidence type="ECO:0007744" key="44">
    <source>
        <dbReference type="PDB" id="4FEC"/>
    </source>
</evidence>
<evidence type="ECO:0007744" key="45">
    <source>
        <dbReference type="PDB" id="4FED"/>
    </source>
</evidence>
<evidence type="ECO:0007744" key="46">
    <source>
        <dbReference type="PDB" id="4RAV"/>
    </source>
</evidence>
<evidence type="ECO:0007744" key="47">
    <source>
        <dbReference type="PDB" id="6EZ8"/>
    </source>
</evidence>
<evidence type="ECO:0007744" key="48">
    <source>
    </source>
</evidence>
<evidence type="ECO:0007744" key="49">
    <source>
    </source>
</evidence>
<evidence type="ECO:0007744" key="50">
    <source>
    </source>
</evidence>
<evidence type="ECO:0007744" key="51">
    <source>
    </source>
</evidence>
<evidence type="ECO:0007744" key="52">
    <source>
    </source>
</evidence>
<evidence type="ECO:0007744" key="53">
    <source>
    </source>
</evidence>
<evidence type="ECO:0007829" key="54">
    <source>
        <dbReference type="PDB" id="3IOT"/>
    </source>
</evidence>
<evidence type="ECO:0007829" key="55">
    <source>
        <dbReference type="PDB" id="4RAV"/>
    </source>
</evidence>
<evidence type="ECO:0007829" key="56">
    <source>
        <dbReference type="PDB" id="6X9O"/>
    </source>
</evidence>
<evidence type="ECO:0007829" key="57">
    <source>
        <dbReference type="PDB" id="8SAH"/>
    </source>
</evidence>
<evidence type="ECO:0007829" key="58">
    <source>
        <dbReference type="PDB" id="8W15"/>
    </source>
</evidence>
<keyword id="KW-0002">3D-structure</keyword>
<keyword id="KW-0007">Acetylation</keyword>
<keyword id="KW-0053">Apoptosis</keyword>
<keyword id="KW-0963">Cytoplasm</keyword>
<keyword id="KW-0968">Cytoplasmic vesicle</keyword>
<keyword id="KW-0225">Disease variant</keyword>
<keyword id="KW-0967">Endosome</keyword>
<keyword id="KW-0991">Intellectual disability</keyword>
<keyword id="KW-0449">Lipoprotein</keyword>
<keyword id="KW-0519">Myristate</keyword>
<keyword id="KW-0523">Neurodegeneration</keyword>
<keyword id="KW-0539">Nucleus</keyword>
<keyword id="KW-0597">Phosphoprotein</keyword>
<keyword id="KW-1267">Proteomics identification</keyword>
<keyword id="KW-1185">Reference proteome</keyword>
<keyword id="KW-0677">Repeat</keyword>
<keyword id="KW-0818">Triplet repeat expansion</keyword>
<keyword id="KW-0832">Ubl conjugation</keyword>
<comment type="function">
    <molecule>Huntingtin</molecule>
    <text>May play a role in microtubule-mediated transport or vesicle function.</text>
</comment>
<comment type="function">
    <molecule>Huntingtin, myristoylated N-terminal fragment</molecule>
    <text evidence="17">Promotes the formation of autophagic vesicles.</text>
</comment>
<comment type="subunit">
    <text evidence="2 5 7 8 9 11 12 14 18 21 22 23 30">Interacts with PFN1 (PubMed:18573880). Interacts through its N-terminus with PRPF40A (PubMed:9700202). Interacts with PQBP1 (PubMed:10332029). Interacts with SETD2 (PubMed:10958656, PubMed:11461154, PubMed:9700202). Interacts with SH3GLB1 (By similarity). Interacts with SYVN (PubMed:17141218). Interacts with TPR; the interaction is inhibited by forms of Huntingtin with expanded polyglutamine stretch (PubMed:15654337). Interacts with ZDHHC13 (via ANK repeats) (PubMed:26198635). Interacts with ZDHHC17 (via ANK repeats) (PubMed:26198635, PubMed:28757145, PubMed:28882895). Interacts with F8A1/F8A2/F8A3 (PubMed:16476778, PubMed:29466333). Found in a complex with F8A1/F8A2/F8A3, HTT and RAB5A; mediates the recruitment of HTT by RAB5A (PubMed:16476778).</text>
</comment>
<comment type="interaction">
    <interactant intactId="EBI-466029">
        <id>P42858</id>
    </interactant>
    <interactant intactId="EBI-10308705">
        <id>Q9H7C9</id>
        <label>AAMDC</label>
    </interactant>
    <organismsDiffer>false</organismsDiffer>
    <experiments>3</experiments>
</comment>
<comment type="interaction">
    <interactant intactId="EBI-466029">
        <id>P42858</id>
    </interactant>
    <interactant intactId="EBI-22011868">
        <id>Q6PCB6</id>
        <label>ABHD17C</label>
    </interactant>
    <organismsDiffer>false</organismsDiffer>
    <experiments>21</experiments>
</comment>
<comment type="interaction">
    <interactant intactId="EBI-466029">
        <id>P42858</id>
    </interactant>
    <interactant intactId="EBI-2602396">
        <id>Q9ULW3</id>
        <label>ABT1</label>
    </interactant>
    <organismsDiffer>false</organismsDiffer>
    <experiments>9</experiments>
</comment>
<comment type="interaction">
    <interactant intactId="EBI-466029">
        <id>P42858</id>
    </interactant>
    <interactant intactId="EBI-353944">
        <id>P60709</id>
        <label>ACTB</label>
    </interactant>
    <organismsDiffer>false</organismsDiffer>
    <experiments>3</experiments>
</comment>
<comment type="interaction">
    <interactant intactId="EBI-466029">
        <id>P42858</id>
    </interactant>
    <interactant intactId="EBI-351292">
        <id>P63261</id>
        <label>ACTG1</label>
    </interactant>
    <organismsDiffer>false</organismsDiffer>
    <experiments>16</experiments>
</comment>
<comment type="interaction">
    <interactant intactId="EBI-466029">
        <id>P42858</id>
    </interactant>
    <interactant intactId="EBI-367493">
        <id>P42025</id>
        <label>ACTR1B</label>
    </interactant>
    <organismsDiffer>false</organismsDiffer>
    <experiments>3</experiments>
</comment>
<comment type="interaction">
    <interactant intactId="EBI-466029">
        <id>P42858</id>
    </interactant>
    <interactant intactId="EBI-10827839">
        <id>Q15848</id>
        <label>ADIPOQ</label>
    </interactant>
    <organismsDiffer>false</organismsDiffer>
    <experiments>9</experiments>
</comment>
<comment type="interaction">
    <interactant intactId="EBI-466029">
        <id>P42858</id>
    </interactant>
    <interactant intactId="EBI-358755">
        <id>Q9Y4W6</id>
        <label>AFG3L2</label>
    </interactant>
    <organismsDiffer>false</organismsDiffer>
    <experiments>3</experiments>
</comment>
<comment type="interaction">
    <interactant intactId="EBI-466029">
        <id>P42858</id>
    </interactant>
    <interactant intactId="EBI-2269837">
        <id>Q53H12</id>
        <label>AGK</label>
    </interactant>
    <organismsDiffer>false</organismsDiffer>
    <experiments>3</experiments>
</comment>
<comment type="interaction">
    <interactant intactId="EBI-466029">
        <id>P42858</id>
    </interactant>
    <interactant intactId="EBI-25944242">
        <id>Q53H12-2</id>
        <label>AGK</label>
    </interactant>
    <organismsDiffer>false</organismsDiffer>
    <experiments>12</experiments>
</comment>
<comment type="interaction">
    <interactant intactId="EBI-466029">
        <id>P42858</id>
    </interactant>
    <interactant intactId="EBI-948813">
        <id>Q5TGY3</id>
        <label>AHDC1</label>
    </interactant>
    <organismsDiffer>false</organismsDiffer>
    <experiments>12</experiments>
</comment>
<comment type="interaction">
    <interactant intactId="EBI-466029">
        <id>P42858</id>
    </interactant>
    <interactant intactId="EBI-3916527">
        <id>Q9UIJ7</id>
        <label>AK3</label>
    </interactant>
    <organismsDiffer>false</organismsDiffer>
    <experiments>9</experiments>
</comment>
<comment type="interaction">
    <interactant intactId="EBI-466029">
        <id>P42858</id>
    </interactant>
    <interactant intactId="EBI-372388">
        <id>P14550</id>
        <label>AKR1A1</label>
    </interactant>
    <organismsDiffer>false</organismsDiffer>
    <experiments>6</experiments>
</comment>
<comment type="interaction">
    <interactant intactId="EBI-466029">
        <id>P42858</id>
    </interactant>
    <interactant intactId="EBI-296087">
        <id>P31749</id>
        <label>AKT1</label>
    </interactant>
    <organismsDiffer>false</organismsDiffer>
    <experiments>3</experiments>
</comment>
<comment type="interaction">
    <interactant intactId="EBI-466029">
        <id>P42858</id>
    </interactant>
    <interactant intactId="EBI-6916128">
        <id>Q3SY69</id>
        <label>ALDH1L2</label>
    </interactant>
    <organismsDiffer>false</organismsDiffer>
    <experiments>3</experiments>
</comment>
<comment type="interaction">
    <interactant intactId="EBI-466029">
        <id>P42858</id>
    </interactant>
    <interactant intactId="EBI-10194102">
        <id>P04075-2</id>
        <label>ALDOA</label>
    </interactant>
    <organismsDiffer>false</organismsDiffer>
    <experiments>6</experiments>
</comment>
<comment type="interaction">
    <interactant intactId="EBI-466029">
        <id>P42858</id>
    </interactant>
    <interactant intactId="EBI-25806804">
        <id>Q9H553</id>
        <label>ALG2</label>
    </interactant>
    <organismsDiffer>false</organismsDiffer>
    <experiments>3</experiments>
</comment>
<comment type="interaction">
    <interactant intactId="EBI-466029">
        <id>P42858</id>
    </interactant>
    <interactant intactId="EBI-25833200">
        <id>Q8IWZ3-3</id>
        <label>ANKHD1</label>
    </interactant>
    <organismsDiffer>false</organismsDiffer>
    <experiments>3</experiments>
</comment>
<comment type="interaction">
    <interactant intactId="EBI-466029">
        <id>P42858</id>
    </interactant>
    <interactant intactId="EBI-25840993">
        <id>Q6ZTN6-2</id>
        <label>ANKRD13D</label>
    </interactant>
    <organismsDiffer>false</organismsDiffer>
    <experiments>9</experiments>
</comment>
<comment type="interaction">
    <interactant intactId="EBI-466029">
        <id>P42858</id>
    </interactant>
    <interactant intactId="EBI-22011535">
        <id>Q5TZF3-1</id>
        <label>ANKRD45</label>
    </interactant>
    <organismsDiffer>false</organismsDiffer>
    <experiments>3</experiments>
</comment>
<comment type="interaction">
    <interactant intactId="EBI-466029">
        <id>P42858</id>
    </interactant>
    <interactant intactId="EBI-3921628">
        <id>Q16853</id>
        <label>AOC3</label>
    </interactant>
    <organismsDiffer>false</organismsDiffer>
    <experiments>3</experiments>
</comment>
<comment type="interaction">
    <interactant intactId="EBI-466029">
        <id>P42858</id>
    </interactant>
    <interactant intactId="EBI-11529439">
        <id>P63010-2</id>
        <label>AP2B1</label>
    </interactant>
    <organismsDiffer>false</organismsDiffer>
    <experiments>18</experiments>
</comment>
<comment type="interaction">
    <interactant intactId="EBI-466029">
        <id>P42858</id>
    </interactant>
    <interactant intactId="EBI-1044383">
        <id>O00203</id>
        <label>AP3B1</label>
    </interactant>
    <organismsDiffer>false</organismsDiffer>
    <experiments>6</experiments>
</comment>
<comment type="interaction">
    <interactant intactId="EBI-466029">
        <id>P42858</id>
    </interactant>
    <interactant intactId="EBI-2371151">
        <id>Q9Y2T2</id>
        <label>AP3M1</label>
    </interactant>
    <organismsDiffer>false</organismsDiffer>
    <experiments>3</experiments>
</comment>
<comment type="interaction">
    <interactant intactId="EBI-466029">
        <id>P42858</id>
    </interactant>
    <interactant intactId="EBI-77613">
        <id>P05067</id>
        <label>APP</label>
    </interactant>
    <organismsDiffer>false</organismsDiffer>
    <experiments>6</experiments>
</comment>
<comment type="interaction">
    <interactant intactId="EBI-466029">
        <id>P42858</id>
    </interactant>
    <interactant intactId="EBI-1044491">
        <id>P48444</id>
        <label>ARCN1</label>
    </interactant>
    <organismsDiffer>false</organismsDiffer>
    <experiments>3</experiments>
</comment>
<comment type="interaction">
    <interactant intactId="EBI-466029">
        <id>P42858</id>
    </interactant>
    <interactant intactId="EBI-2875816">
        <id>Q9NP61</id>
        <label>ARFGAP3</label>
    </interactant>
    <organismsDiffer>false</organismsDiffer>
    <experiments>22</experiments>
</comment>
<comment type="interaction">
    <interactant intactId="EBI-466029">
        <id>P42858</id>
    </interactant>
    <interactant intactId="EBI-638194">
        <id>P53365</id>
        <label>ARFIP2</label>
    </interactant>
    <organismsDiffer>false</organismsDiffer>
    <experiments>3</experiments>
</comment>
<comment type="interaction">
    <interactant intactId="EBI-466029">
        <id>P42858</id>
    </interactant>
    <interactant intactId="EBI-988764">
        <id>Q8N264</id>
        <label>ARHGAP24</label>
    </interactant>
    <organismsDiffer>false</organismsDiffer>
    <experiments>3</experiments>
</comment>
<comment type="interaction">
    <interactant intactId="EBI-466029">
        <id>P42858</id>
    </interactant>
    <interactant intactId="EBI-22012297">
        <id>Q52LW3-2</id>
        <label>ARHGAP29</label>
    </interactant>
    <organismsDiffer>false</organismsDiffer>
    <experiments>3</experiments>
</comment>
<comment type="interaction">
    <interactant intactId="EBI-466029">
        <id>P42858</id>
    </interactant>
    <interactant intactId="EBI-10186132">
        <id>Q0P5N6</id>
        <label>ARL16</label>
    </interactant>
    <organismsDiffer>false</organismsDiffer>
    <experiments>18</experiments>
</comment>
<comment type="interaction">
    <interactant intactId="EBI-466029">
        <id>P42858</id>
    </interactant>
    <interactant intactId="EBI-10252512">
        <id>Q6P1M9</id>
        <label>ARMCX5</label>
    </interactant>
    <organismsDiffer>false</organismsDiffer>
    <experiments>6</experiments>
</comment>
<comment type="interaction">
    <interactant intactId="EBI-466029">
        <id>P42858</id>
    </interactant>
    <interactant intactId="EBI-25844820">
        <id>Q86TN1</id>
        <label>ARNT2</label>
    </interactant>
    <organismsDiffer>false</organismsDiffer>
    <experiments>9</experiments>
</comment>
<comment type="interaction">
    <interactant intactId="EBI-466029">
        <id>P42858</id>
    </interactant>
    <interactant intactId="EBI-14199987">
        <id>Q9Y575-3</id>
        <label>ASB3</label>
    </interactant>
    <organismsDiffer>false</organismsDiffer>
    <experiments>6</experiments>
</comment>
<comment type="interaction">
    <interactant intactId="EBI-466029">
        <id>P42858</id>
    </interactant>
    <interactant intactId="EBI-10254793">
        <id>Q6XD76</id>
        <label>ASCL4</label>
    </interactant>
    <organismsDiffer>false</organismsDiffer>
    <experiments>6</experiments>
</comment>
<comment type="interaction">
    <interactant intactId="EBI-466029">
        <id>P42858</id>
    </interactant>
    <interactant intactId="EBI-9089489">
        <id>Q96FT7-4</id>
        <label>ASIC4</label>
    </interactant>
    <organismsDiffer>false</organismsDiffer>
    <experiments>3</experiments>
</comment>
<comment type="interaction">
    <interactant intactId="EBI-466029">
        <id>P42858</id>
    </interactant>
    <interactant intactId="EBI-12092171">
        <id>Q12797-6</id>
        <label>ASPH</label>
    </interactant>
    <organismsDiffer>false</organismsDiffer>
    <experiments>6</experiments>
</comment>
<comment type="interaction">
    <interactant intactId="EBI-466029">
        <id>P42858</id>
    </interactant>
    <interactant intactId="EBI-25953099">
        <id>Q12797-7</id>
        <label>ASPH</label>
    </interactant>
    <organismsDiffer>false</organismsDiffer>
    <experiments>3</experiments>
</comment>
<comment type="interaction">
    <interactant intactId="EBI-466029">
        <id>P42858</id>
    </interactant>
    <interactant intactId="EBI-3225845">
        <id>Q96DT6</id>
        <label>ATG4C</label>
    </interactant>
    <organismsDiffer>false</organismsDiffer>
    <experiments>15</experiments>
</comment>
<comment type="interaction">
    <interactant intactId="EBI-466029">
        <id>P42858</id>
    </interactant>
    <interactant intactId="EBI-2410266">
        <id>Q8WXF7</id>
        <label>ATL1</label>
    </interactant>
    <organismsDiffer>false</organismsDiffer>
    <experiments>18</experiments>
</comment>
<comment type="interaction">
    <interactant intactId="EBI-466029">
        <id>P42858</id>
    </interactant>
    <interactant intactId="EBI-351437">
        <id>P25705</id>
        <label>ATP5F1A</label>
    </interactant>
    <organismsDiffer>false</organismsDiffer>
    <experiments>3</experiments>
</comment>
<comment type="interaction">
    <interactant intactId="EBI-466029">
        <id>P42858</id>
    </interactant>
    <interactant intactId="EBI-1044810">
        <id>P24539</id>
        <label>ATP5PB</label>
    </interactant>
    <organismsDiffer>false</organismsDiffer>
    <experiments>3</experiments>
</comment>
<comment type="interaction">
    <interactant intactId="EBI-466029">
        <id>P42858</id>
    </interactant>
    <interactant intactId="EBI-355815">
        <id>P48047</id>
        <label>ATP5PO</label>
    </interactant>
    <organismsDiffer>false</organismsDiffer>
    <experiments>6</experiments>
</comment>
<comment type="interaction">
    <interactant intactId="EBI-466029">
        <id>P42858</id>
    </interactant>
    <interactant intactId="EBI-714667">
        <id>Q15904</id>
        <label>ATP6AP1</label>
    </interactant>
    <organismsDiffer>false</organismsDiffer>
    <experiments>3</experiments>
</comment>
<comment type="interaction">
    <interactant intactId="EBI-466029">
        <id>P42858</id>
    </interactant>
    <interactant intactId="EBI-954063">
        <id>P61421</id>
        <label>ATP6V0D1</label>
    </interactant>
    <organismsDiffer>false</organismsDiffer>
    <experiments>6</experiments>
</comment>
<comment type="interaction">
    <interactant intactId="EBI-466029">
        <id>P42858</id>
    </interactant>
    <interactant intactId="EBI-4290814">
        <id>P21281</id>
        <label>ATP6V1B2</label>
    </interactant>
    <organismsDiffer>false</organismsDiffer>
    <experiments>3</experiments>
</comment>
<comment type="interaction">
    <interactant intactId="EBI-466029">
        <id>P42858</id>
    </interactant>
    <interactant intactId="EBI-724719">
        <id>Q9UI12</id>
        <label>ATP6V1H</label>
    </interactant>
    <organismsDiffer>false</organismsDiffer>
    <experiments>3</experiments>
</comment>
<comment type="interaction">
    <interactant intactId="EBI-466029">
        <id>P42858</id>
    </interactant>
    <interactant intactId="EBI-9091996">
        <id>Q9UQB8-3</id>
        <label>BAIAP2</label>
    </interactant>
    <organismsDiffer>false</organismsDiffer>
    <experiments>18</experiments>
</comment>
<comment type="interaction">
    <interactant intactId="EBI-466029">
        <id>P42858</id>
    </interactant>
    <interactant intactId="EBI-9092016">
        <id>Q9UQB8-6</id>
        <label>BAIAP2</label>
    </interactant>
    <organismsDiffer>false</organismsDiffer>
    <experiments>18</experiments>
</comment>
<comment type="interaction">
    <interactant intactId="EBI-466029">
        <id>P42858</id>
    </interactant>
    <interactant intactId="EBI-749503">
        <id>Q16520</id>
        <label>BATF</label>
    </interactant>
    <organismsDiffer>false</organismsDiffer>
    <experiments>12</experiments>
</comment>
<comment type="interaction">
    <interactant intactId="EBI-466029">
        <id>P42858</id>
    </interactant>
    <interactant intactId="EBI-927511">
        <id>Q9NRL2</id>
        <label>BAZ1A</label>
    </interactant>
    <organismsDiffer>false</organismsDiffer>
    <experiments>4</experiments>
</comment>
<comment type="interaction">
    <interactant intactId="EBI-466029">
        <id>P42858</id>
    </interactant>
    <interactant intactId="EBI-752084">
        <id>Q9BUW7</id>
        <label>BBLN</label>
    </interactant>
    <organismsDiffer>false</organismsDiffer>
    <experiments>6</experiments>
</comment>
<comment type="interaction">
    <interactant intactId="EBI-466029">
        <id>P42858</id>
    </interactant>
    <interactant intactId="EBI-22013474">
        <id>Q8WY36-3</id>
        <label>BBX</label>
    </interactant>
    <organismsDiffer>false</organismsDiffer>
    <experiments>6</experiments>
</comment>
<comment type="interaction">
    <interactant intactId="EBI-466029">
        <id>P42858</id>
    </interactant>
    <interactant intactId="EBI-77683">
        <id>P51572</id>
        <label>BCAP31</label>
    </interactant>
    <organismsDiffer>false</organismsDiffer>
    <experiments>4</experiments>
</comment>
<comment type="interaction">
    <interactant intactId="EBI-466029">
        <id>P42858</id>
    </interactant>
    <interactant intactId="EBI-949378">
        <id>Q14457</id>
        <label>BECN1</label>
    </interactant>
    <organismsDiffer>false</organismsDiffer>
    <experiments>15</experiments>
</comment>
<comment type="interaction">
    <interactant intactId="EBI-466029">
        <id>P42858</id>
    </interactant>
    <interactant intactId="EBI-741753">
        <id>Q00994</id>
        <label>BEX3</label>
    </interactant>
    <organismsDiffer>false</organismsDiffer>
    <experiments>6</experiments>
</comment>
<comment type="interaction">
    <interactant intactId="EBI-466029">
        <id>P42858</id>
    </interactant>
    <interactant intactId="EBI-518823">
        <id>O15392</id>
        <label>BIRC5</label>
    </interactant>
    <organismsDiffer>false</organismsDiffer>
    <experiments>15</experiments>
</comment>
<comment type="interaction">
    <interactant intactId="EBI-466029">
        <id>P42858</id>
    </interactant>
    <interactant intactId="EBI-25861458">
        <id>Q9GZL8</id>
        <label>BPESC1</label>
    </interactant>
    <organismsDiffer>false</organismsDiffer>
    <experiments>15</experiments>
</comment>
<comment type="interaction">
    <interactant intactId="EBI-466029">
        <id>P42858</id>
    </interactant>
    <interactant intactId="EBI-25833510">
        <id>P38398-6</id>
        <label>BRCA1</label>
    </interactant>
    <organismsDiffer>false</organismsDiffer>
    <experiments>3</experiments>
</comment>
<comment type="interaction">
    <interactant intactId="EBI-466029">
        <id>P42858</id>
    </interactant>
    <interactant intactId="EBI-2837444">
        <id>Q8WUW1</id>
        <label>BRK1</label>
    </interactant>
    <organismsDiffer>false</organismsDiffer>
    <experiments>6</experiments>
</comment>
<comment type="interaction">
    <interactant intactId="EBI-466029">
        <id>P42858</id>
    </interactant>
    <interactant intactId="EBI-3844053">
        <id>Q13901</id>
        <label>C1D</label>
    </interactant>
    <organismsDiffer>false</organismsDiffer>
    <experiments>6</experiments>
</comment>
<comment type="interaction">
    <interactant intactId="EBI-466029">
        <id>P42858</id>
    </interactant>
    <interactant intactId="EBI-946029">
        <id>Q6P1W5</id>
        <label>C1orf94</label>
    </interactant>
    <organismsDiffer>false</organismsDiffer>
    <experiments>3</experiments>
</comment>
<comment type="interaction">
    <interactant intactId="EBI-466029">
        <id>P42858</id>
    </interactant>
    <interactant intactId="EBI-10697546">
        <id>Q9BXJ4</id>
        <label>C1QTNF3</label>
    </interactant>
    <organismsDiffer>false</organismsDiffer>
    <experiments>3</experiments>
</comment>
<comment type="interaction">
    <interactant intactId="EBI-466029">
        <id>P42858</id>
    </interactant>
    <interactant intactId="EBI-9088162">
        <id>Q9NUB4</id>
        <label>C20orf141</label>
    </interactant>
    <organismsDiffer>false</organismsDiffer>
    <experiments>6</experiments>
</comment>
<comment type="interaction">
    <interactant intactId="EBI-466029">
        <id>P42858</id>
    </interactant>
    <interactant intactId="EBI-10692329">
        <id>Q6P5X5-2</id>
        <label>C22orf39</label>
    </interactant>
    <organismsDiffer>false</organismsDiffer>
    <experiments>3</experiments>
</comment>
<comment type="interaction">
    <interactant intactId="EBI-466029">
        <id>P42858</id>
    </interactant>
    <interactant intactId="EBI-751612">
        <id>Q9BRJ6</id>
        <label>C7orf50</label>
    </interactant>
    <organismsDiffer>false</organismsDiffer>
    <experiments>6</experiments>
</comment>
<comment type="interaction">
    <interactant intactId="EBI-466029">
        <id>P42858</id>
    </interactant>
    <interactant intactId="EBI-21771960">
        <id>Q8IVU9</id>
        <label>CABCOCO1</label>
    </interactant>
    <organismsDiffer>false</organismsDiffer>
    <experiments>3</experiments>
</comment>
<comment type="interaction">
    <interactant intactId="EBI-466029">
        <id>P42858</id>
    </interactant>
    <interactant intactId="EBI-397435">
        <id>P62158</id>
        <label>CALM3</label>
    </interactant>
    <organismsDiffer>false</organismsDiffer>
    <experiments>10</experiments>
</comment>
<comment type="interaction">
    <interactant intactId="EBI-466029">
        <id>P42858</id>
    </interactant>
    <interactant intactId="EBI-6380130">
        <id>Q14012</id>
        <label>CAMK1</label>
    </interactant>
    <organismsDiffer>false</organismsDiffer>
    <experiments>3</experiments>
</comment>
<comment type="interaction">
    <interactant intactId="EBI-466029">
        <id>P42858</id>
    </interactant>
    <interactant intactId="EBI-25850646">
        <id>Q8N5S9-2</id>
        <label>CAMKK1</label>
    </interactant>
    <organismsDiffer>false</organismsDiffer>
    <experiments>9</experiments>
</comment>
<comment type="interaction">
    <interactant intactId="EBI-466029">
        <id>P42858</id>
    </interactant>
    <interactant intactId="EBI-3915761">
        <id>Q9HC96</id>
        <label>CAPN10</label>
    </interactant>
    <organismsDiffer>false</organismsDiffer>
    <experiments>12</experiments>
</comment>
<comment type="interaction">
    <interactant intactId="EBI-466029">
        <id>P42858</id>
    </interactant>
    <interactant intactId="EBI-12248206">
        <id>P29466-3</id>
        <label>CASP1</label>
    </interactant>
    <organismsDiffer>false</organismsDiffer>
    <experiments>3</experiments>
</comment>
<comment type="interaction">
    <interactant intactId="EBI-466029">
        <id>P42858</id>
    </interactant>
    <interactant intactId="EBI-524064">
        <id>P42574</id>
        <label>CASP3</label>
    </interactant>
    <organismsDiffer>false</organismsDiffer>
    <experiments>9</experiments>
</comment>
<comment type="interaction">
    <interactant intactId="EBI-466029">
        <id>P42858</id>
    </interactant>
    <interactant intactId="EBI-718729">
        <id>P55212</id>
        <label>CASP6</label>
    </interactant>
    <organismsDiffer>false</organismsDiffer>
    <experiments>15</experiments>
</comment>
<comment type="interaction">
    <interactant intactId="EBI-466029">
        <id>P42858</id>
    </interactant>
    <interactant intactId="EBI-523958">
        <id>P55210</id>
        <label>CASP7</label>
    </interactant>
    <organismsDiffer>false</organismsDiffer>
    <experiments>12</experiments>
</comment>
<comment type="interaction">
    <interactant intactId="EBI-466029">
        <id>P42858</id>
    </interactant>
    <interactant intactId="EBI-518228">
        <id>P22681</id>
        <label>CBL</label>
    </interactant>
    <organismsDiffer>false</organismsDiffer>
    <experiments>18</experiments>
</comment>
<comment type="interaction">
    <interactant intactId="EBI-466029">
        <id>P42858</id>
    </interactant>
    <interactant intactId="EBI-740135">
        <id>P35520</id>
        <label>CBS</label>
    </interactant>
    <organismsDiffer>false</organismsDiffer>
    <experiments>12</experiments>
</comment>
<comment type="interaction">
    <interactant intactId="EBI-466029">
        <id>P42858</id>
    </interactant>
    <interactant intactId="EBI-78129">
        <id>P83916</id>
        <label>CBX1</label>
    </interactant>
    <organismsDiffer>false</organismsDiffer>
    <experiments>15</experiments>
</comment>
<comment type="interaction">
    <interactant intactId="EBI-466029">
        <id>P42858</id>
    </interactant>
    <interactant intactId="EBI-744556">
        <id>Q96HB5</id>
        <label>CCDC120</label>
    </interactant>
    <organismsDiffer>false</organismsDiffer>
    <experiments>3</experiments>
</comment>
<comment type="interaction">
    <interactant intactId="EBI-466029">
        <id>P42858</id>
    </interactant>
    <interactant intactId="EBI-18211613">
        <id>Q96M83-3</id>
        <label>CCDC7</label>
    </interactant>
    <organismsDiffer>false</organismsDiffer>
    <experiments>18</experiments>
</comment>
<comment type="interaction">
    <interactant intactId="EBI-466029">
        <id>P42858</id>
    </interactant>
    <interactant intactId="EBI-2557532">
        <id>Q9Y3X0</id>
        <label>CCDC9</label>
    </interactant>
    <organismsDiffer>false</organismsDiffer>
    <experiments>3</experiments>
</comment>
<comment type="interaction">
    <interactant intactId="EBI-466029">
        <id>P42858</id>
    </interactant>
    <interactant intactId="EBI-25879469">
        <id>Q13939</id>
        <label>CCIN</label>
    </interactant>
    <organismsDiffer>false</organismsDiffer>
    <experiments>3</experiments>
</comment>
<comment type="interaction">
    <interactant intactId="EBI-466029">
        <id>P42858</id>
    </interactant>
    <interactant intactId="EBI-745269">
        <id>Q9NPC3</id>
        <label>CCNB1IP1</label>
    </interactant>
    <organismsDiffer>false</organismsDiffer>
    <experiments>6</experiments>
</comment>
<comment type="interaction">
    <interactant intactId="EBI-466029">
        <id>P42858</id>
    </interactant>
    <interactant intactId="EBI-395261">
        <id>P24863</id>
        <label>CCNC</label>
    </interactant>
    <organismsDiffer>false</organismsDiffer>
    <experiments>9</experiments>
</comment>
<comment type="interaction">
    <interactant intactId="EBI-466029">
        <id>P42858</id>
    </interactant>
    <interactant intactId="EBI-375033">
        <id>O96020</id>
        <label>CCNE2</label>
    </interactant>
    <organismsDiffer>false</organismsDiffer>
    <experiments>6</experiments>
</comment>
<comment type="interaction">
    <interactant intactId="EBI-466029">
        <id>P42858</id>
    </interactant>
    <interactant intactId="EBI-3905829">
        <id>P51959</id>
        <label>CCNG1</label>
    </interactant>
    <organismsDiffer>false</organismsDiffer>
    <experiments>3</experiments>
</comment>
<comment type="interaction">
    <interactant intactId="EBI-466029">
        <id>P42858</id>
    </interactant>
    <interactant intactId="EBI-357407">
        <id>P78371</id>
        <label>CCT2</label>
    </interactant>
    <organismsDiffer>false</organismsDiffer>
    <experiments>6</experiments>
</comment>
<comment type="interaction">
    <interactant intactId="EBI-466029">
        <id>P42858</id>
    </interactant>
    <interactant intactId="EBI-355710">
        <id>P48643</id>
        <label>CCT5</label>
    </interactant>
    <organismsDiffer>false</organismsDiffer>
    <experiments>3</experiments>
</comment>
<comment type="interaction">
    <interactant intactId="EBI-466029">
        <id>P42858</id>
    </interactant>
    <interactant intactId="EBI-356687">
        <id>P40227</id>
        <label>CCT6A</label>
    </interactant>
    <organismsDiffer>false</organismsDiffer>
    <experiments>10</experiments>
</comment>
<comment type="interaction">
    <interactant intactId="EBI-466029">
        <id>P42858</id>
    </interactant>
    <interactant intactId="EBI-356507">
        <id>P50990</id>
        <label>CCT8</label>
    </interactant>
    <organismsDiffer>false</organismsDiffer>
    <experiments>4</experiments>
</comment>
<comment type="interaction">
    <interactant intactId="EBI-466029">
        <id>P42858</id>
    </interactant>
    <interactant intactId="EBI-297972">
        <id>P13987</id>
        <label>CD59</label>
    </interactant>
    <organismsDiffer>false</organismsDiffer>
    <experiments>10</experiments>
</comment>
<comment type="interaction">
    <interactant intactId="EBI-466029">
        <id>P42858</id>
    </interactant>
    <interactant intactId="EBI-744665">
        <id>Q9H3Q1</id>
        <label>CDC42EP4</label>
    </interactant>
    <organismsDiffer>false</organismsDiffer>
    <experiments>3</experiments>
</comment>
<comment type="interaction">
    <interactant intactId="EBI-466029">
        <id>P42858</id>
    </interactant>
    <interactant intactId="EBI-374880">
        <id>Q99459</id>
        <label>CDC5L</label>
    </interactant>
    <organismsDiffer>false</organismsDiffer>
    <experiments>3</experiments>
</comment>
<comment type="interaction">
    <interactant intactId="EBI-466029">
        <id>P42858</id>
    </interactant>
    <interactant intactId="EBI-374980">
        <id>O00311</id>
        <label>CDC7</label>
    </interactant>
    <organismsDiffer>false</organismsDiffer>
    <experiments>3</experiments>
</comment>
<comment type="interaction">
    <interactant intactId="EBI-466029">
        <id>P42858</id>
    </interactant>
    <interactant intactId="EBI-7054803">
        <id>Q9BWT1</id>
        <label>CDCA7</label>
    </interactant>
    <organismsDiffer>false</organismsDiffer>
    <experiments>3</experiments>
</comment>
<comment type="interaction">
    <interactant intactId="EBI-466029">
        <id>P42858</id>
    </interactant>
    <interactant intactId="EBI-7205595">
        <id>P55290</id>
        <label>CDH13</label>
    </interactant>
    <organismsDiffer>false</organismsDiffer>
    <experiments>6</experiments>
</comment>
<comment type="interaction">
    <interactant intactId="EBI-466029">
        <id>P42858</id>
    </interactant>
    <interactant intactId="EBI-3913685">
        <id>O95674</id>
        <label>CDS2</label>
    </interactant>
    <organismsDiffer>false</organismsDiffer>
    <experiments>9</experiments>
</comment>
<comment type="interaction">
    <interactant intactId="EBI-466029">
        <id>P42858</id>
    </interactant>
    <interactant intactId="EBI-5529649">
        <id>Q8N2Z9</id>
        <label>CENPS</label>
    </interactant>
    <organismsDiffer>false</organismsDiffer>
    <experiments>3</experiments>
</comment>
<comment type="interaction">
    <interactant intactId="EBI-466029">
        <id>P42858</id>
    </interactant>
    <interactant intactId="EBI-1210604">
        <id>Q7Z7K6</id>
        <label>CENPV</label>
    </interactant>
    <organismsDiffer>false</organismsDiffer>
    <experiments>15</experiments>
</comment>
<comment type="interaction">
    <interactant intactId="EBI-466029">
        <id>P42858</id>
    </interactant>
    <interactant intactId="EBI-473176">
        <id>Q9P2H0</id>
        <label>CEP126</label>
    </interactant>
    <organismsDiffer>false</organismsDiffer>
    <experiments>2</experiments>
</comment>
<comment type="interaction">
    <interactant intactId="EBI-466029">
        <id>P42858</id>
    </interactant>
    <interactant intactId="EBI-747776">
        <id>Q53EZ4</id>
        <label>CEP55</label>
    </interactant>
    <organismsDiffer>false</organismsDiffer>
    <experiments>9</experiments>
</comment>
<comment type="interaction">
    <interactant intactId="EBI-466029">
        <id>P42858</id>
    </interactant>
    <interactant intactId="EBI-11522539">
        <id>Q96MT8-3</id>
        <label>CEP63</label>
    </interactant>
    <organismsDiffer>false</organismsDiffer>
    <experiments>12</experiments>
</comment>
<comment type="interaction">
    <interactant intactId="EBI-466029">
        <id>P42858</id>
    </interactant>
    <interactant intactId="EBI-11526150">
        <id>Q8NHQ1-3</id>
        <label>CEP70</label>
    </interactant>
    <organismsDiffer>false</organismsDiffer>
    <experiments>6</experiments>
</comment>
<comment type="interaction">
    <interactant intactId="EBI-466029">
        <id>P42858</id>
    </interactant>
    <interactant intactId="EBI-1789926">
        <id>P41208</id>
        <label>CETN2</label>
    </interactant>
    <organismsDiffer>false</organismsDiffer>
    <experiments>13</experiments>
</comment>
<comment type="interaction">
    <interactant intactId="EBI-466029">
        <id>P42858</id>
    </interactant>
    <interactant intactId="EBI-2321769">
        <id>Q9Y6H1</id>
        <label>CHCHD2</label>
    </interactant>
    <organismsDiffer>false</organismsDiffer>
    <experiments>10</experiments>
</comment>
<comment type="interaction">
    <interactant intactId="EBI-466029">
        <id>P42858</id>
    </interactant>
    <interactant intactId="EBI-743375">
        <id>Q9NX63</id>
        <label>CHCHD3</label>
    </interactant>
    <organismsDiffer>false</organismsDiffer>
    <experiments>6</experiments>
</comment>
<comment type="interaction">
    <interactant intactId="EBI-466029">
        <id>P42858</id>
    </interactant>
    <interactant intactId="EBI-523590">
        <id>Q12873</id>
        <label>CHD3</label>
    </interactant>
    <organismsDiffer>false</organismsDiffer>
    <experiments>3</experiments>
</comment>
<comment type="interaction">
    <interactant intactId="EBI-466029">
        <id>P42858</id>
    </interactant>
    <interactant intactId="EBI-1057156">
        <id>Q9HD42</id>
        <label>CHMP1A</label>
    </interactant>
    <organismsDiffer>false</organismsDiffer>
    <experiments>12</experiments>
</comment>
<comment type="interaction">
    <interactant intactId="EBI-466029">
        <id>P42858</id>
    </interactant>
    <interactant intactId="EBI-2692789">
        <id>O43633</id>
        <label>CHMP2A</label>
    </interactant>
    <organismsDiffer>false</organismsDiffer>
    <experiments>3</experiments>
</comment>
<comment type="interaction">
    <interactant intactId="EBI-466029">
        <id>P42858</id>
    </interactant>
    <interactant intactId="EBI-749627">
        <id>Q9H444</id>
        <label>CHMP4B</label>
    </interactant>
    <organismsDiffer>false</organismsDiffer>
    <experiments>7</experiments>
</comment>
<comment type="interaction">
    <interactant intactId="EBI-466029">
        <id>P42858</id>
    </interactant>
    <interactant intactId="EBI-7062247">
        <id>Q9UHD4</id>
        <label>CIDEB</label>
    </interactant>
    <organismsDiffer>false</organismsDiffer>
    <experiments>3</experiments>
</comment>
<comment type="interaction">
    <interactant intactId="EBI-466029">
        <id>P42858</id>
    </interactant>
    <interactant intactId="EBI-4287089">
        <id>P06732</id>
        <label>CKM</label>
    </interactant>
    <organismsDiffer>false</organismsDiffer>
    <experiments>3</experiments>
</comment>
<comment type="interaction">
    <interactant intactId="EBI-466029">
        <id>P42858</id>
    </interactant>
    <interactant intactId="EBI-3957044">
        <id>Q9Y240</id>
        <label>CLEC11A</label>
    </interactant>
    <organismsDiffer>false</organismsDiffer>
    <experiments>12</experiments>
</comment>
<comment type="interaction">
    <interactant intactId="EBI-466029">
        <id>P42858</id>
    </interactant>
    <interactant intactId="EBI-13350535">
        <id>Q92478</id>
        <label>CLEC2B</label>
    </interactant>
    <organismsDiffer>false</organismsDiffer>
    <experiments>9</experiments>
</comment>
<comment type="interaction">
    <interactant intactId="EBI-466029">
        <id>P42858</id>
    </interactant>
    <interactant intactId="EBI-1056029">
        <id>Q16740</id>
        <label>CLPP</label>
    </interactant>
    <organismsDiffer>false</organismsDiffer>
    <experiments>6</experiments>
</comment>
<comment type="interaction">
    <interactant intactId="EBI-466029">
        <id>P42858</id>
    </interactant>
    <interactant intactId="EBI-9091272">
        <id>Q8NCR9</id>
        <label>CLRN3</label>
    </interactant>
    <organismsDiffer>false</organismsDiffer>
    <experiments>9</experiments>
</comment>
<comment type="interaction">
    <interactant intactId="EBI-466029">
        <id>P42858</id>
    </interactant>
    <interactant intactId="EBI-1054261">
        <id>Q9H9A5</id>
        <label>CNOT10</label>
    </interactant>
    <organismsDiffer>false</organismsDiffer>
    <experiments>4</experiments>
</comment>
<comment type="interaction">
    <interactant intactId="EBI-466029">
        <id>P42858</id>
    </interactant>
    <interactant intactId="EBI-25957177">
        <id>Q9H9A5-3</id>
        <label>CNOT10</label>
    </interactant>
    <organismsDiffer>false</organismsDiffer>
    <experiments>3</experiments>
</comment>
<comment type="interaction">
    <interactant intactId="EBI-466029">
        <id>P42858</id>
    </interactant>
    <interactant intactId="EBI-2105113">
        <id>Q9UIV1</id>
        <label>CNOT7</label>
    </interactant>
    <organismsDiffer>false</organismsDiffer>
    <experiments>13</experiments>
</comment>
<comment type="interaction">
    <interactant intactId="EBI-466029">
        <id>P42858</id>
    </interactant>
    <interactant intactId="EBI-1059219">
        <id>P09543</id>
        <label>CNP</label>
    </interactant>
    <organismsDiffer>false</organismsDiffer>
    <experiments>10</experiments>
</comment>
<comment type="interaction">
    <interactant intactId="EBI-466029">
        <id>P42858</id>
    </interactant>
    <interactant intactId="EBI-720875">
        <id>Q96MW5</id>
        <label>COG8</label>
    </interactant>
    <organismsDiffer>false</organismsDiffer>
    <experiments>12</experiments>
</comment>
<comment type="interaction">
    <interactant intactId="EBI-466029">
        <id>P42858</id>
    </interactant>
    <interactant intactId="EBI-359063">
        <id>P53618</id>
        <label>COPB1</label>
    </interactant>
    <organismsDiffer>false</organismsDiffer>
    <experiments>6</experiments>
</comment>
<comment type="interaction">
    <interactant intactId="EBI-466029">
        <id>P42858</id>
    </interactant>
    <interactant intactId="EBI-350590">
        <id>Q9UNS2</id>
        <label>COPS3</label>
    </interactant>
    <organismsDiffer>false</organismsDiffer>
    <experiments>22</experiments>
</comment>
<comment type="interaction">
    <interactant intactId="EBI-466029">
        <id>P42858</id>
    </interactant>
    <interactant intactId="EBI-10260134">
        <id>Q86WV2</id>
        <label>COX4I1</label>
    </interactant>
    <organismsDiffer>false</organismsDiffer>
    <experiments>3</experiments>
</comment>
<comment type="interaction">
    <interactant intactId="EBI-466029">
        <id>P42858</id>
    </interactant>
    <interactant intactId="EBI-1053725">
        <id>P10606</id>
        <label>COX5B</label>
    </interactant>
    <organismsDiffer>false</organismsDiffer>
    <experiments>7</experiments>
</comment>
<comment type="interaction">
    <interactant intactId="EBI-466029">
        <id>P42858</id>
    </interactant>
    <interactant intactId="EBI-2115950">
        <id>P12074</id>
        <label>COX6A1</label>
    </interactant>
    <organismsDiffer>false</organismsDiffer>
    <experiments>4</experiments>
</comment>
<comment type="interaction">
    <interactant intactId="EBI-466029">
        <id>P42858</id>
    </interactant>
    <interactant intactId="EBI-715040">
        <id>P09669</id>
        <label>COX6C</label>
    </interactant>
    <organismsDiffer>false</organismsDiffer>
    <experiments>4</experiments>
</comment>
<comment type="interaction">
    <interactant intactId="EBI-466029">
        <id>P42858</id>
    </interactant>
    <interactant intactId="EBI-1044699">
        <id>Q9UKF6</id>
        <label>CPSF3</label>
    </interactant>
    <organismsDiffer>false</organismsDiffer>
    <experiments>3</experiments>
</comment>
<comment type="interaction">
    <interactant intactId="EBI-466029">
        <id>P42858</id>
    </interactant>
    <interactant intactId="EBI-25865477">
        <id>A2RRE8</id>
        <label>CPT1B</label>
    </interactant>
    <organismsDiffer>false</organismsDiffer>
    <experiments>6</experiments>
</comment>
<comment type="interaction">
    <interactant intactId="EBI-466029">
        <id>P42858</id>
    </interactant>
    <interactant intactId="EBI-739773">
        <id>Q9BSW2</id>
        <label>CRACR2A</label>
    </interactant>
    <organismsDiffer>false</organismsDiffer>
    <experiments>9</experiments>
</comment>
<comment type="interaction">
    <interactant intactId="EBI-466029">
        <id>P42858</id>
    </interactant>
    <interactant intactId="EBI-711855">
        <id>P16220</id>
        <label>CREB1</label>
    </interactant>
    <organismsDiffer>false</organismsDiffer>
    <experiments>3</experiments>
</comment>
<comment type="interaction">
    <interactant intactId="EBI-466029">
        <id>P42858</id>
    </interactant>
    <interactant intactId="EBI-81215">
        <id>Q92793</id>
        <label>CREBBP</label>
    </interactant>
    <organismsDiffer>false</organismsDiffer>
    <experiments>2</experiments>
</comment>
<comment type="interaction">
    <interactant intactId="EBI-466029">
        <id>P42858</id>
    </interactant>
    <interactant intactId="EBI-21670927">
        <id>Q6UXH1-2</id>
        <label>CRELD2</label>
    </interactant>
    <organismsDiffer>false</organismsDiffer>
    <experiments>6</experiments>
</comment>
<comment type="interaction">
    <interactant intactId="EBI-466029">
        <id>P42858</id>
    </interactant>
    <interactant intactId="EBI-886">
        <id>P46108</id>
        <label>CRK</label>
    </interactant>
    <organismsDiffer>false</organismsDiffer>
    <experiments>3</experiments>
</comment>
<comment type="interaction">
    <interactant intactId="EBI-466029">
        <id>P42858</id>
    </interactant>
    <interactant intactId="EBI-473101">
        <id>Q14194</id>
        <label>CRMP1</label>
    </interactant>
    <organismsDiffer>false</organismsDiffer>
    <experiments>14</experiments>
</comment>
<comment type="interaction">
    <interactant intactId="EBI-466029">
        <id>P42858</id>
    </interactant>
    <interactant intactId="EBI-6875961">
        <id>P02489</id>
        <label>CRYAA</label>
    </interactant>
    <organismsDiffer>false</organismsDiffer>
    <experiments>3</experiments>
</comment>
<comment type="interaction">
    <interactant intactId="EBI-466029">
        <id>P42858</id>
    </interactant>
    <interactant intactId="EBI-750444">
        <id>P53672</id>
        <label>CRYBA2</label>
    </interactant>
    <organismsDiffer>false</organismsDiffer>
    <experiments>3</experiments>
</comment>
<comment type="interaction">
    <interactant intactId="EBI-466029">
        <id>P42858</id>
    </interactant>
    <interactant intactId="EBI-1809826">
        <id>P04141</id>
        <label>CSF2</label>
    </interactant>
    <organismsDiffer>false</organismsDiffer>
    <experiments>15</experiments>
</comment>
<comment type="interaction">
    <interactant intactId="EBI-466029">
        <id>P42858</id>
    </interactant>
    <interactant intactId="EBI-9087876">
        <id>P48730-2</id>
        <label>CSNK1D</label>
    </interactant>
    <organismsDiffer>false</organismsDiffer>
    <experiments>15</experiments>
</comment>
<comment type="interaction">
    <interactant intactId="EBI-466029">
        <id>P42858</id>
    </interactant>
    <interactant intactId="EBI-5658719">
        <id>P50461</id>
        <label>CSRP3</label>
    </interactant>
    <organismsDiffer>false</organismsDiffer>
    <experiments>3</experiments>
</comment>
<comment type="interaction">
    <interactant intactId="EBI-466029">
        <id>P42858</id>
    </interactant>
    <interactant intactId="EBI-13328871">
        <id>Q9H6J7-2</id>
        <label>CSTPP1</label>
    </interactant>
    <organismsDiffer>false</organismsDiffer>
    <experiments>6</experiments>
</comment>
<comment type="interaction">
    <interactant intactId="EBI-466029">
        <id>P42858</id>
    </interactant>
    <interactant intactId="EBI-10171902">
        <id>P56545-3</id>
        <label>CTBP2</label>
    </interactant>
    <organismsDiffer>false</organismsDiffer>
    <experiments>3</experiments>
</comment>
<comment type="interaction">
    <interactant intactId="EBI-466029">
        <id>P42858</id>
    </interactant>
    <interactant intactId="EBI-491549">
        <id>P35222</id>
        <label>CTNNB1</label>
    </interactant>
    <organismsDiffer>false</organismsDiffer>
    <experiments>14</experiments>
</comment>
<comment type="interaction">
    <interactant intactId="EBI-466029">
        <id>P42858</id>
    </interactant>
    <interactant intactId="EBI-456129">
        <id>Q13618</id>
        <label>CUL3</label>
    </interactant>
    <organismsDiffer>false</organismsDiffer>
    <experiments>3</experiments>
</comment>
<comment type="interaction">
    <interactant intactId="EBI-466029">
        <id>P42858</id>
    </interactant>
    <interactant intactId="EBI-1057139">
        <id>Q93034</id>
        <label>CUL5</label>
    </interactant>
    <organismsDiffer>false</organismsDiffer>
    <experiments>10</experiments>
</comment>
<comment type="interaction">
    <interactant intactId="EBI-466029">
        <id>P42858</id>
    </interactant>
    <interactant intactId="EBI-12024320">
        <id>Q8TB03</id>
        <label>CXorf38</label>
    </interactant>
    <organismsDiffer>false</organismsDiffer>
    <experiments>15</experiments>
</comment>
<comment type="interaction">
    <interactant intactId="EBI-466029">
        <id>P42858</id>
    </interactant>
    <interactant intactId="EBI-1224514">
        <id>P08574</id>
        <label>CYC1</label>
    </interactant>
    <organismsDiffer>false</organismsDiffer>
    <experiments>7</experiments>
</comment>
<comment type="interaction">
    <interactant intactId="EBI-466029">
        <id>P42858</id>
    </interactant>
    <interactant intactId="EBI-3908011">
        <id>P20815</id>
        <label>CYP3A5</label>
    </interactant>
    <organismsDiffer>false</organismsDiffer>
    <experiments>3</experiments>
</comment>
<comment type="interaction">
    <interactant intactId="EBI-466029">
        <id>P42858</id>
    </interactant>
    <interactant intactId="EBI-9090939">
        <id>Q5D0E6-2</id>
        <label>DALRD3</label>
    </interactant>
    <organismsDiffer>false</organismsDiffer>
    <experiments>9</experiments>
</comment>
<comment type="interaction">
    <interactant intactId="EBI-466029">
        <id>P42858</id>
    </interactant>
    <interactant intactId="EBI-3918199">
        <id>Q9UN19</id>
        <label>DAPP1</label>
    </interactant>
    <organismsDiffer>false</organismsDiffer>
    <experiments>9</experiments>
</comment>
<comment type="interaction">
    <interactant intactId="EBI-466029">
        <id>P42858</id>
    </interactant>
    <interactant intactId="EBI-77321">
        <id>Q9UER7</id>
        <label>DAXX</label>
    </interactant>
    <organismsDiffer>false</organismsDiffer>
    <experiments>15</experiments>
</comment>
<comment type="interaction">
    <interactant intactId="EBI-466029">
        <id>P42858</id>
    </interactant>
    <interactant intactId="EBI-724310">
        <id>Q15038</id>
        <label>DAZAP2</label>
    </interactant>
    <organismsDiffer>false</organismsDiffer>
    <experiments>3</experiments>
</comment>
<comment type="interaction">
    <interactant intactId="EBI-466029">
        <id>P42858</id>
    </interactant>
    <interactant intactId="EBI-751783">
        <id>Q9UJU6</id>
        <label>DBNL</label>
    </interactant>
    <organismsDiffer>false</organismsDiffer>
    <experiments>3</experiments>
</comment>
<comment type="interaction">
    <interactant intactId="EBI-466029">
        <id>P42858</id>
    </interactant>
    <interactant intactId="EBI-359808">
        <id>P61962</id>
        <label>DCAF7</label>
    </interactant>
    <organismsDiffer>false</organismsDiffer>
    <experiments>10</experiments>
</comment>
<comment type="interaction">
    <interactant intactId="EBI-466029">
        <id>P42858</id>
    </interactant>
    <interactant intactId="EBI-3508943">
        <id>Q9H816</id>
        <label>DCLRE1B</label>
    </interactant>
    <organismsDiffer>false</organismsDiffer>
    <experiments>9</experiments>
</comment>
<comment type="interaction">
    <interactant intactId="EBI-466029">
        <id>P42858</id>
    </interactant>
    <interactant intactId="EBI-715074">
        <id>Q13561</id>
        <label>DCTN2</label>
    </interactant>
    <organismsDiffer>false</organismsDiffer>
    <experiments>12</experiments>
</comment>
<comment type="interaction">
    <interactant intactId="EBI-466029">
        <id>P42858</id>
    </interactant>
    <interactant intactId="EBI-2134033">
        <id>Q9UJW0</id>
        <label>DCTN4</label>
    </interactant>
    <organismsDiffer>false</organismsDiffer>
    <experiments>3</experiments>
</comment>
<comment type="interaction">
    <interactant intactId="EBI-466029">
        <id>P42858</id>
    </interactant>
    <interactant intactId="EBI-347658">
        <id>Q9UHI6</id>
        <label>DDX20</label>
    </interactant>
    <organismsDiffer>false</organismsDiffer>
    <experiments>6</experiments>
</comment>
<comment type="interaction">
    <interactant intactId="EBI-466029">
        <id>P42858</id>
    </interactant>
    <interactant intactId="EBI-357942">
        <id>Q9NR30</id>
        <label>DDX21</label>
    </interactant>
    <organismsDiffer>false</organismsDiffer>
    <experiments>3</experiments>
</comment>
<comment type="interaction">
    <interactant intactId="EBI-466029">
        <id>P42858</id>
    </interactant>
    <interactant intactId="EBI-348253">
        <id>O00148</id>
        <label>DDX39A</label>
    </interactant>
    <organismsDiffer>false</organismsDiffer>
    <experiments>3</experiments>
</comment>
<comment type="interaction">
    <interactant intactId="EBI-466029">
        <id>P42858</id>
    </interactant>
    <interactant intactId="EBI-1046350">
        <id>Q9UJV9</id>
        <label>DDX41</label>
    </interactant>
    <organismsDiffer>false</organismsDiffer>
    <experiments>6</experiments>
</comment>
<comment type="interaction">
    <interactant intactId="EBI-466029">
        <id>P42858</id>
    </interactant>
    <interactant intactId="EBI-2805660">
        <id>Q14154</id>
        <label>DELE1</label>
    </interactant>
    <organismsDiffer>false</organismsDiffer>
    <experiments>18</experiments>
</comment>
<comment type="interaction">
    <interactant intactId="EBI-466029">
        <id>P42858</id>
    </interactant>
    <interactant intactId="EBI-962633">
        <id>P78524</id>
        <label>DENND2B</label>
    </interactant>
    <organismsDiffer>false</organismsDiffer>
    <experiments>3</experiments>
</comment>
<comment type="interaction">
    <interactant intactId="EBI-466029">
        <id>P42858</id>
    </interactant>
    <interactant intactId="EBI-1055572">
        <id>P17661</id>
        <label>DES</label>
    </interactant>
    <organismsDiffer>false</organismsDiffer>
    <experiments>9</experiments>
</comment>
<comment type="interaction">
    <interactant intactId="EBI-466029">
        <id>P42858</id>
    </interactant>
    <interactant intactId="EBI-748597">
        <id>Q05D60</id>
        <label>DEUP1</label>
    </interactant>
    <organismsDiffer>false</organismsDiffer>
    <experiments>15</experiments>
</comment>
<comment type="interaction">
    <interactant intactId="EBI-466029">
        <id>P42858</id>
    </interactant>
    <interactant intactId="EBI-25960650">
        <id>Q5T7M9-2</id>
        <label>DIPK1A</label>
    </interactant>
    <organismsDiffer>false</organismsDiffer>
    <experiments>3</experiments>
</comment>
<comment type="interaction">
    <interactant intactId="EBI-466029">
        <id>P42858</id>
    </interactant>
    <interactant intactId="EBI-353366">
        <id>P09622</id>
        <label>DLD</label>
    </interactant>
    <organismsDiffer>false</organismsDiffer>
    <experiments>3</experiments>
</comment>
<comment type="interaction">
    <interactant intactId="EBI-466029">
        <id>P42858</id>
    </interactant>
    <interactant intactId="EBI-351007">
        <id>P36957</id>
        <label>DLST</label>
    </interactant>
    <organismsDiffer>false</organismsDiffer>
    <experiments>3</experiments>
</comment>
<comment type="interaction">
    <interactant intactId="EBI-466029">
        <id>P42858</id>
    </interactant>
    <interactant intactId="EBI-3908248">
        <id>O60479</id>
        <label>DLX3</label>
    </interactant>
    <organismsDiffer>false</organismsDiffer>
    <experiments>3</experiments>
</comment>
<comment type="interaction">
    <interactant intactId="EBI-466029">
        <id>P42858</id>
    </interactant>
    <interactant intactId="EBI-347834">
        <id>P31689</id>
        <label>DNAJA1</label>
    </interactant>
    <organismsDiffer>false</organismsDiffer>
    <experiments>17</experiments>
</comment>
<comment type="interaction">
    <interactant intactId="EBI-466029">
        <id>P42858</id>
    </interactant>
    <interactant intactId="EBI-356767">
        <id>Q96EY1</id>
        <label>DNAJA3</label>
    </interactant>
    <organismsDiffer>false</organismsDiffer>
    <experiments>5</experiments>
</comment>
<comment type="interaction">
    <interactant intactId="EBI-466029">
        <id>P42858</id>
    </interactant>
    <interactant intactId="EBI-356960">
        <id>Q9UDY4</id>
        <label>DNAJB4</label>
    </interactant>
    <organismsDiffer>false</organismsDiffer>
    <experiments>3</experiments>
</comment>
<comment type="interaction">
    <interactant intactId="EBI-466029">
        <id>P42858</id>
    </interactant>
    <interactant intactId="EBI-12593112">
        <id>O75190-2</id>
        <label>DNAJB6</label>
    </interactant>
    <organismsDiffer>false</organismsDiffer>
    <experiments>3</experiments>
</comment>
<comment type="interaction">
    <interactant intactId="EBI-466029">
        <id>P42858</id>
    </interactant>
    <interactant intactId="EBI-1055336">
        <id>Q9NVH1</id>
        <label>DNAJC11</label>
    </interactant>
    <organismsDiffer>false</organismsDiffer>
    <experiments>3</experiments>
</comment>
<comment type="interaction">
    <interactant intactId="EBI-466029">
        <id>P42858</id>
    </interactant>
    <interactant intactId="EBI-2654581">
        <id>Q5F1R6</id>
        <label>DNAJC21</label>
    </interactant>
    <organismsDiffer>false</organismsDiffer>
    <experiments>6</experiments>
</comment>
<comment type="interaction">
    <interactant intactId="EBI-466029">
        <id>P42858</id>
    </interactant>
    <interactant intactId="EBI-4397791">
        <id>Q9NNZ3</id>
        <label>DNAJC4</label>
    </interactant>
    <organismsDiffer>false</organismsDiffer>
    <experiments>12</experiments>
</comment>
<comment type="interaction">
    <interactant intactId="EBI-466029">
        <id>P42858</id>
    </interactant>
    <interactant intactId="EBI-395638">
        <id>O14645</id>
        <label>DNALI1</label>
    </interactant>
    <organismsDiffer>false</organismsDiffer>
    <experiments>15</experiments>
</comment>
<comment type="interaction">
    <interactant intactId="EBI-466029">
        <id>P42858</id>
    </interactant>
    <interactant intactId="EBI-713135">
        <id>Q05193</id>
        <label>DNM1</label>
    </interactant>
    <organismsDiffer>false</organismsDiffer>
    <experiments>3</experiments>
</comment>
<comment type="interaction">
    <interactant intactId="EBI-466029">
        <id>P42858</id>
    </interactant>
    <interactant intactId="EBI-10968534">
        <id>P50570-2</id>
        <label>DNM2</label>
    </interactant>
    <organismsDiffer>false</organismsDiffer>
    <experiments>6</experiments>
</comment>
<comment type="interaction">
    <interactant intactId="EBI-466029">
        <id>P42858</id>
    </interactant>
    <interactant intactId="EBI-2795449">
        <id>Q9H147</id>
        <label>DNTTIP1</label>
    </interactant>
    <organismsDiffer>false</organismsDiffer>
    <experiments>15</experiments>
</comment>
<comment type="interaction">
    <interactant intactId="EBI-466029">
        <id>P42858</id>
    </interactant>
    <interactant intactId="EBI-3922860">
        <id>Q9H3H5</id>
        <label>DPAGT1</label>
    </interactant>
    <organismsDiffer>false</organismsDiffer>
    <experiments>3</experiments>
</comment>
<comment type="interaction">
    <interactant intactId="EBI-466029">
        <id>P42858</id>
    </interactant>
    <interactant intactId="EBI-1104711">
        <id>Q16555</id>
        <label>DPYSL2</label>
    </interactant>
    <organismsDiffer>false</organismsDiffer>
    <experiments>3</experiments>
</comment>
<comment type="interaction">
    <interactant intactId="EBI-466029">
        <id>P42858</id>
    </interactant>
    <interactant intactId="EBI-724653">
        <id>Q9BPU6</id>
        <label>DPYSL5</label>
    </interactant>
    <organismsDiffer>false</organismsDiffer>
    <experiments>9</experiments>
</comment>
<comment type="interaction">
    <interactant intactId="EBI-466029">
        <id>P42858</id>
    </interactant>
    <interactant intactId="EBI-356015">
        <id>Q14204</id>
        <label>DYNC1H1</label>
    </interactant>
    <organismsDiffer>false</organismsDiffer>
    <experiments>8</experiments>
</comment>
<comment type="interaction">
    <interactant intactId="EBI-466029">
        <id>P42858</id>
    </interactant>
    <interactant intactId="EBI-349105">
        <id>P63167</id>
        <label>DYNLL1</label>
    </interactant>
    <organismsDiffer>false</organismsDiffer>
    <experiments>10</experiments>
</comment>
<comment type="interaction">
    <interactant intactId="EBI-466029">
        <id>P42858</id>
    </interactant>
    <interactant intactId="EBI-7779316">
        <id>A0AVK6</id>
        <label>E2F8</label>
    </interactant>
    <organismsDiffer>false</organismsDiffer>
    <experiments>12</experiments>
</comment>
<comment type="interaction">
    <interactant intactId="EBI-466029">
        <id>P42858</id>
    </interactant>
    <interactant intactId="EBI-711968">
        <id>Q13011</id>
        <label>ECH1</label>
    </interactant>
    <organismsDiffer>false</organismsDiffer>
    <experiments>2</experiments>
</comment>
<comment type="interaction">
    <interactant intactId="EBI-466029">
        <id>P42858</id>
    </interactant>
    <interactant intactId="EBI-781301">
        <id>O60869</id>
        <label>EDF1</label>
    </interactant>
    <organismsDiffer>false</organismsDiffer>
    <experiments>6</experiments>
</comment>
<comment type="interaction">
    <interactant intactId="EBI-466029">
        <id>P42858</id>
    </interactant>
    <interactant intactId="EBI-2870947">
        <id>Q3B7T1</id>
        <label>EDRF1</label>
    </interactant>
    <organismsDiffer>false</organismsDiffer>
    <experiments>18</experiments>
</comment>
<comment type="interaction">
    <interactant intactId="EBI-466029">
        <id>P42858</id>
    </interactant>
    <interactant intactId="EBI-354943">
        <id>Q05639</id>
        <label>EEF1A2</label>
    </interactant>
    <organismsDiffer>false</organismsDiffer>
    <experiments>3</experiments>
</comment>
<comment type="interaction">
    <interactant intactId="EBI-466029">
        <id>P42858</id>
    </interactant>
    <interactant intactId="EBI-354334">
        <id>P24534</id>
        <label>EEF1B2</label>
    </interactant>
    <organismsDiffer>false</organismsDiffer>
    <experiments>7</experiments>
</comment>
<comment type="interaction">
    <interactant intactId="EBI-466029">
        <id>P42858</id>
    </interactant>
    <interactant intactId="EBI-358607">
        <id>P29692</id>
        <label>EEF1D</label>
    </interactant>
    <organismsDiffer>false</organismsDiffer>
    <experiments>6</experiments>
</comment>
<comment type="interaction">
    <interactant intactId="EBI-466029">
        <id>P42858</id>
    </interactant>
    <interactant intactId="EBI-352560">
        <id>P13639</id>
        <label>EEF2</label>
    </interactant>
    <organismsDiffer>false</organismsDiffer>
    <experiments>3</experiments>
</comment>
<comment type="interaction">
    <interactant intactId="EBI-466029">
        <id>P42858</id>
    </interactant>
    <interactant intactId="EBI-536772">
        <id>Q12805</id>
        <label>EFEMP1</label>
    </interactant>
    <organismsDiffer>false</organismsDiffer>
    <experiments>3</experiments>
</comment>
<comment type="interaction">
    <interactant intactId="EBI-466029">
        <id>P42858</id>
    </interactant>
    <interactant intactId="EBI-286439">
        <id>O14602</id>
        <label>EIF1AY</label>
    </interactant>
    <organismsDiffer>false</organismsDiffer>
    <experiments>6</experiments>
</comment>
<comment type="interaction">
    <interactant intactId="EBI-466029">
        <id>P42858</id>
    </interactant>
    <interactant intactId="EBI-711977">
        <id>P20042</id>
        <label>EIF2S2</label>
    </interactant>
    <organismsDiffer>false</organismsDiffer>
    <experiments>12</experiments>
</comment>
<comment type="interaction">
    <interactant intactId="EBI-466029">
        <id>P42858</id>
    </interactant>
    <interactant intactId="EBI-1054228">
        <id>P41091</id>
        <label>EIF2S3</label>
    </interactant>
    <organismsDiffer>false</organismsDiffer>
    <experiments>3</experiments>
</comment>
<comment type="interaction">
    <interactant intactId="EBI-466029">
        <id>P42858</id>
    </interactant>
    <interactant intactId="EBI-366632">
        <id>O75821</id>
        <label>EIF3G</label>
    </interactant>
    <organismsDiffer>false</organismsDiffer>
    <experiments>4</experiments>
</comment>
<comment type="interaction">
    <interactant intactId="EBI-466029">
        <id>P42858</id>
    </interactant>
    <interactant intactId="EBI-354047">
        <id>Q13347</id>
        <label>EIF3I</label>
    </interactant>
    <organismsDiffer>false</organismsDiffer>
    <experiments>13</experiments>
</comment>
<comment type="interaction">
    <interactant intactId="EBI-466029">
        <id>P42858</id>
    </interactant>
    <interactant intactId="EBI-10232522">
        <id>Q14240-2</id>
        <label>EIF4A2</label>
    </interactant>
    <organismsDiffer>false</organismsDiffer>
    <experiments>3</experiments>
</comment>
<comment type="interaction">
    <interactant intactId="EBI-466029">
        <id>P42858</id>
    </interactant>
    <interactant intactId="EBI-398610">
        <id>O60573</id>
        <label>EIF4E2</label>
    </interactant>
    <organismsDiffer>false</organismsDiffer>
    <experiments>4</experiments>
</comment>
<comment type="interaction">
    <interactant intactId="EBI-466029">
        <id>P42858</id>
    </interactant>
    <interactant intactId="EBI-286450">
        <id>P55010</id>
        <label>EIF5</label>
    </interactant>
    <organismsDiffer>false</organismsDiffer>
    <experiments>3</experiments>
</comment>
<comment type="interaction">
    <interactant intactId="EBI-466029">
        <id>P42858</id>
    </interactant>
    <interactant intactId="EBI-347559">
        <id>O95163</id>
        <label>ELP1</label>
    </interactant>
    <organismsDiffer>false</organismsDiffer>
    <experiments>4</experiments>
</comment>
<comment type="interaction">
    <interactant intactId="EBI-466029">
        <id>P42858</id>
    </interactant>
    <interactant intactId="EBI-11748557">
        <id>Q9Y6C2-2</id>
        <label>EMILIN1</label>
    </interactant>
    <organismsDiffer>false</organismsDiffer>
    <experiments>3</experiments>
</comment>
<comment type="interaction">
    <interactant intactId="EBI-466029">
        <id>P42858</id>
    </interactant>
    <interactant intactId="EBI-6425462">
        <id>O14682</id>
        <label>ENC1</label>
    </interactant>
    <organismsDiffer>false</organismsDiffer>
    <experiments>4</experiments>
</comment>
<comment type="interaction">
    <interactant intactId="EBI-466029">
        <id>P42858</id>
    </interactant>
    <interactant intactId="EBI-9246952">
        <id>Q8TC29</id>
        <label>ENKUR</label>
    </interactant>
    <organismsDiffer>false</organismsDiffer>
    <experiments>6</experiments>
</comment>
<comment type="interaction">
    <interactant intactId="EBI-466029">
        <id>P42858</id>
    </interactant>
    <interactant intactId="EBI-353877">
        <id>P06733</id>
        <label>ENO1</label>
    </interactant>
    <organismsDiffer>false</organismsDiffer>
    <experiments>13</experiments>
</comment>
<comment type="interaction">
    <interactant intactId="EBI-466029">
        <id>P42858</id>
    </interactant>
    <interactant intactId="EBI-3913907">
        <id>Q9Y5L3</id>
        <label>ENTPD2</label>
    </interactant>
    <organismsDiffer>false</organismsDiffer>
    <experiments>3</experiments>
</comment>
<comment type="interaction">
    <interactant intactId="EBI-466029">
        <id>P42858</id>
    </interactant>
    <interactant intactId="EBI-7416931">
        <id>O75356</id>
        <label>ENTPD5</label>
    </interactant>
    <organismsDiffer>false</organismsDiffer>
    <experiments>3</experiments>
</comment>
<comment type="interaction">
    <interactant intactId="EBI-466029">
        <id>P42858</id>
    </interactant>
    <interactant intactId="EBI-25865535">
        <id>A0A0C4DH22</id>
        <label>EPB41L1</label>
    </interactant>
    <organismsDiffer>false</organismsDiffer>
    <experiments>6</experiments>
</comment>
<comment type="interaction">
    <interactant intactId="EBI-466029">
        <id>P42858</id>
    </interactant>
    <interactant intactId="EBI-21574901">
        <id>Q8TE68-3</id>
        <label>EPS8L1</label>
    </interactant>
    <organismsDiffer>false</organismsDiffer>
    <experiments>3</experiments>
</comment>
<comment type="interaction">
    <interactant intactId="EBI-466029">
        <id>P42858</id>
    </interactant>
    <interactant intactId="EBI-1042535">
        <id>Q2NKX8</id>
        <label>ERCC6L</label>
    </interactant>
    <organismsDiffer>false</organismsDiffer>
    <experiments>20</experiments>
</comment>
<comment type="interaction">
    <interactant intactId="EBI-466029">
        <id>P42858</id>
    </interactant>
    <interactant intactId="EBI-2682520">
        <id>A1L162</id>
        <label>ERICH2</label>
    </interactant>
    <organismsDiffer>false</organismsDiffer>
    <experiments>3</experiments>
</comment>
<comment type="interaction">
    <interactant intactId="EBI-466029">
        <id>P42858</id>
    </interactant>
    <interactant intactId="EBI-953772">
        <id>Q96DN0</id>
        <label>ERP27</label>
    </interactant>
    <organismsDiffer>false</organismsDiffer>
    <experiments>3</experiments>
</comment>
<comment type="interaction">
    <interactant intactId="EBI-466029">
        <id>P42858</id>
    </interactant>
    <interactant intactId="EBI-21567429">
        <id>Q6NXG1-3</id>
        <label>ESRP1</label>
    </interactant>
    <organismsDiffer>false</organismsDiffer>
    <experiments>6</experiments>
</comment>
<comment type="interaction">
    <interactant intactId="EBI-466029">
        <id>P42858</id>
    </interactant>
    <interactant intactId="EBI-6448852">
        <id>Q9UI08-2</id>
        <label>EVL</label>
    </interactant>
    <organismsDiffer>false</organismsDiffer>
    <experiments>20</experiments>
</comment>
<comment type="interaction">
    <interactant intactId="EBI-466029">
        <id>P42858</id>
    </interactant>
    <interactant intactId="EBI-25896785">
        <id>Q01844-4</id>
        <label>EWSR1</label>
    </interactant>
    <organismsDiffer>false</organismsDiffer>
    <experiments>3</experiments>
</comment>
<comment type="interaction">
    <interactant intactId="EBI-466029">
        <id>P42858</id>
    </interactant>
    <interactant intactId="EBI-949824">
        <id>O00471</id>
        <label>EXOC5</label>
    </interactant>
    <organismsDiffer>false</organismsDiffer>
    <experiments>3</experiments>
</comment>
<comment type="interaction">
    <interactant intactId="EBI-466029">
        <id>P42858</id>
    </interactant>
    <interactant intactId="EBI-9089567">
        <id>Q99504</id>
        <label>EYA3</label>
    </interactant>
    <organismsDiffer>false</organismsDiffer>
    <experiments>6</experiments>
</comment>
<comment type="interaction">
    <interactant intactId="EBI-466029">
        <id>P42858</id>
    </interactant>
    <interactant intactId="EBI-1056902">
        <id>P15311</id>
        <label>EZR</label>
    </interactant>
    <organismsDiffer>false</organismsDiffer>
    <experiments>4</experiments>
</comment>
<comment type="interaction">
    <interactant intactId="EBI-466029">
        <id>P42858</id>
    </interactant>
    <interactant intactId="EBI-5663973">
        <id>P23610</id>
        <label>F8A3</label>
    </interactant>
    <organismsDiffer>false</organismsDiffer>
    <experiments>4</experiments>
</comment>
<comment type="interaction">
    <interactant intactId="EBI-466029">
        <id>P42858</id>
    </interactant>
    <interactant intactId="EBI-6309082">
        <id>Q6SJ93</id>
        <label>FAM111B</label>
    </interactant>
    <organismsDiffer>false</organismsDiffer>
    <experiments>12</experiments>
</comment>
<comment type="interaction">
    <interactant intactId="EBI-466029">
        <id>P42858</id>
    </interactant>
    <interactant intactId="EBI-11793142">
        <id>Q96GL9</id>
        <label>FAM163A</label>
    </interactant>
    <organismsDiffer>false</organismsDiffer>
    <experiments>12</experiments>
</comment>
<comment type="interaction">
    <interactant intactId="EBI-466029">
        <id>P42858</id>
    </interactant>
    <interactant intactId="EBI-10290462">
        <id>Q96KS9</id>
        <label>FAM167A</label>
    </interactant>
    <organismsDiffer>false</organismsDiffer>
    <experiments>6</experiments>
</comment>
<comment type="interaction">
    <interactant intactId="EBI-466029">
        <id>P42858</id>
    </interactant>
    <interactant intactId="EBI-11956087">
        <id>Q5HYJ3-3</id>
        <label>FAM76B</label>
    </interactant>
    <organismsDiffer>false</organismsDiffer>
    <experiments>6</experiments>
</comment>
<comment type="interaction">
    <interactant intactId="EBI-466029">
        <id>P42858</id>
    </interactant>
    <interactant intactId="EBI-21900888">
        <id>Q5JUQ0</id>
        <label>FAM78A</label>
    </interactant>
    <organismsDiffer>false</organismsDiffer>
    <experiments>3</experiments>
</comment>
<comment type="interaction">
    <interactant intactId="EBI-466029">
        <id>P42858</id>
    </interactant>
    <interactant intactId="EBI-8468186">
        <id>Q8IZU1</id>
        <label>FAM9A</label>
    </interactant>
    <organismsDiffer>false</organismsDiffer>
    <experiments>18</experiments>
</comment>
<comment type="interaction">
    <interactant intactId="EBI-466029">
        <id>P42858</id>
    </interactant>
    <interactant intactId="EBI-81589">
        <id>Q9NPI8</id>
        <label>FANCF</label>
    </interactant>
    <organismsDiffer>false</organismsDiffer>
    <experiments>3</experiments>
</comment>
<comment type="interaction">
    <interactant intactId="EBI-466029">
        <id>P42858</id>
    </interactant>
    <interactant intactId="EBI-21975404">
        <id>Q8TC84</id>
        <label>FANK1</label>
    </interactant>
    <organismsDiffer>false</organismsDiffer>
    <experiments>3</experiments>
</comment>
<comment type="interaction">
    <interactant intactId="EBI-466029">
        <id>P42858</id>
    </interactant>
    <interactant intactId="EBI-353803">
        <id>Q9NSD9</id>
        <label>FARSB</label>
    </interactant>
    <organismsDiffer>false</organismsDiffer>
    <experiments>3</experiments>
</comment>
<comment type="interaction">
    <interactant intactId="EBI-466029">
        <id>P42858</id>
    </interactant>
    <interactant intactId="EBI-356658">
        <id>P49327</id>
        <label>FASN</label>
    </interactant>
    <organismsDiffer>false</organismsDiffer>
    <experiments>13</experiments>
</comment>
<comment type="interaction">
    <interactant intactId="EBI-466029">
        <id>P42858</id>
    </interactant>
    <interactant intactId="EBI-3957005">
        <id>Q53R41</id>
        <label>FASTKD1</label>
    </interactant>
    <organismsDiffer>false</organismsDiffer>
    <experiments>9</experiments>
</comment>
<comment type="interaction">
    <interactant intactId="EBI-466029">
        <id>P42858</id>
    </interactant>
    <interactant intactId="EBI-724767">
        <id>Q8NFZ0</id>
        <label>FBH1</label>
    </interactant>
    <organismsDiffer>false</organismsDiffer>
    <experiments>6</experiments>
</comment>
<comment type="interaction">
    <interactant intactId="EBI-466029">
        <id>P42858</id>
    </interactant>
    <interactant intactId="EBI-712740">
        <id>P09467</id>
        <label>FBP1</label>
    </interactant>
    <organismsDiffer>false</organismsDiffer>
    <experiments>3</experiments>
</comment>
<comment type="interaction">
    <interactant intactId="EBI-466029">
        <id>P42858</id>
    </interactant>
    <interactant intactId="EBI-396435">
        <id>Q99689</id>
        <label>FEZ1</label>
    </interactant>
    <organismsDiffer>false</organismsDiffer>
    <experiments>6</experiments>
</comment>
<comment type="interaction">
    <interactant intactId="EBI-466029">
        <id>P42858</id>
    </interactant>
    <interactant intactId="EBI-396453">
        <id>Q9UHY8</id>
        <label>FEZ2</label>
    </interactant>
    <organismsDiffer>false</organismsDiffer>
    <experiments>18</experiments>
</comment>
<comment type="interaction">
    <interactant intactId="EBI-466029">
        <id>P42858</id>
    </interactant>
    <interactant intactId="EBI-741101">
        <id>Q13643</id>
        <label>FHL3</label>
    </interactant>
    <organismsDiffer>false</organismsDiffer>
    <experiments>9</experiments>
</comment>
<comment type="interaction">
    <interactant intactId="EBI-466029">
        <id>P42858</id>
    </interactant>
    <interactant intactId="EBI-3907198">
        <id>Q9BVA6</id>
        <label>FICD</label>
    </interactant>
    <organismsDiffer>false</organismsDiffer>
    <experiments>3</experiments>
</comment>
<comment type="interaction">
    <interactant intactId="EBI-466029">
        <id>P42858</id>
    </interactant>
    <interactant intactId="EBI-719873">
        <id>P26885</id>
        <label>FKBP2</label>
    </interactant>
    <organismsDiffer>false</organismsDiffer>
    <experiments>6</experiments>
</comment>
<comment type="interaction">
    <interactant intactId="EBI-466029">
        <id>P42858</id>
    </interactant>
    <interactant intactId="EBI-603643">
        <id>O75955</id>
        <label>FLOT1</label>
    </interactant>
    <organismsDiffer>false</organismsDiffer>
    <experiments>4</experiments>
</comment>
<comment type="interaction">
    <interactant intactId="EBI-466029">
        <id>P42858</id>
    </interactant>
    <interactant intactId="EBI-310600">
        <id>Q8N3X1</id>
        <label>FNBP4</label>
    </interactant>
    <organismsDiffer>false</organismsDiffer>
    <experiments>6</experiments>
</comment>
<comment type="interaction">
    <interactant intactId="EBI-466029">
        <id>P42858</id>
    </interactant>
    <interactant intactId="EBI-6425864">
        <id>Q3SYB3</id>
        <label>FOXD4L6</label>
    </interactant>
    <organismsDiffer>false</organismsDiffer>
    <experiments>6</experiments>
</comment>
<comment type="interaction">
    <interactant intactId="EBI-466029">
        <id>P42858</id>
    </interactant>
    <interactant intactId="EBI-10253815">
        <id>Q6PIV2</id>
        <label>FOXR1</label>
    </interactant>
    <organismsDiffer>false</organismsDiffer>
    <experiments>12</experiments>
</comment>
<comment type="interaction">
    <interactant intactId="EBI-466029">
        <id>P42858</id>
    </interactant>
    <interactant intactId="EBI-10696047">
        <id>O95073-2</id>
        <label>FSBP</label>
    </interactant>
    <organismsDiffer>false</organismsDiffer>
    <experiments>3</experiments>
</comment>
<comment type="interaction">
    <interactant intactId="EBI-466029">
        <id>P42858</id>
    </interactant>
    <interactant intactId="EBI-713279">
        <id>P02792</id>
        <label>FTL</label>
    </interactant>
    <organismsDiffer>false</organismsDiffer>
    <experiments>20</experiments>
</comment>
<comment type="interaction">
    <interactant intactId="EBI-466029">
        <id>P42858</id>
    </interactant>
    <interactant intactId="EBI-10691738">
        <id>P06241-3</id>
        <label>FYN</label>
    </interactant>
    <organismsDiffer>false</organismsDiffer>
    <experiments>12</experiments>
</comment>
<comment type="interaction">
    <interactant intactId="EBI-466029">
        <id>P42858</id>
    </interactant>
    <interactant intactId="EBI-2466380">
        <id>Q9ULV1</id>
        <label>FZD4</label>
    </interactant>
    <organismsDiffer>false</organismsDiffer>
    <experiments>9</experiments>
</comment>
<comment type="interaction">
    <interactant intactId="EBI-466029">
        <id>P42858</id>
    </interactant>
    <interactant intactId="EBI-751757">
        <id>Q7L622</id>
        <label>G2E3</label>
    </interactant>
    <organismsDiffer>false</organismsDiffer>
    <experiments>6</experiments>
</comment>
<comment type="interaction">
    <interactant intactId="EBI-466029">
        <id>P42858</id>
    </interactant>
    <interactant intactId="EBI-1047359">
        <id>Q13283</id>
        <label>G3BP1</label>
    </interactant>
    <organismsDiffer>false</organismsDiffer>
    <experiments>16</experiments>
</comment>
<comment type="interaction">
    <interactant intactId="EBI-466029">
        <id>P42858</id>
    </interactant>
    <interactant intactId="EBI-975200">
        <id>Q9UQC2</id>
        <label>GAB2</label>
    </interactant>
    <organismsDiffer>false</organismsDiffer>
    <experiments>3</experiments>
</comment>
<comment type="interaction">
    <interactant intactId="EBI-466029">
        <id>P42858</id>
    </interactant>
    <interactant intactId="EBI-21555925">
        <id>Q8N4A0</id>
        <label>GALNT4</label>
    </interactant>
    <organismsDiffer>false</organismsDiffer>
    <experiments>12</experiments>
</comment>
<comment type="interaction">
    <interactant intactId="EBI-466029">
        <id>P42858</id>
    </interactant>
    <interactant intactId="EBI-354056">
        <id>P04406</id>
        <label>GAPDH</label>
    </interactant>
    <organismsDiffer>false</organismsDiffer>
    <experiments>7</experiments>
</comment>
<comment type="interaction">
    <interactant intactId="EBI-466029">
        <id>P42858</id>
    </interactant>
    <interactant intactId="EBI-947242">
        <id>P28676</id>
        <label>GCA</label>
    </interactant>
    <organismsDiffer>false</organismsDiffer>
    <experiments>3</experiments>
</comment>
<comment type="interaction">
    <interactant intactId="EBI-466029">
        <id>P42858</id>
    </interactant>
    <interactant intactId="EBI-744302">
        <id>P14136</id>
        <label>GFAP</label>
    </interactant>
    <organismsDiffer>false</organismsDiffer>
    <experiments>10</experiments>
</comment>
<comment type="interaction">
    <interactant intactId="EBI-466029">
        <id>P42858</id>
    </interactant>
    <interactant intactId="EBI-8799578">
        <id>Q9NXC2</id>
        <label>GFOD1</label>
    </interactant>
    <organismsDiffer>false</organismsDiffer>
    <experiments>9</experiments>
</comment>
<comment type="interaction">
    <interactant intactId="EBI-466029">
        <id>P42858</id>
    </interactant>
    <interactant intactId="EBI-15891037">
        <id>Q9UG22</id>
        <label>GIMAP2</label>
    </interactant>
    <organismsDiffer>false</organismsDiffer>
    <experiments>6</experiments>
</comment>
<comment type="interaction">
    <interactant intactId="EBI-466029">
        <id>P42858</id>
    </interactant>
    <interactant intactId="EBI-466061">
        <id>Q9Y2X7</id>
        <label>GIT1</label>
    </interactant>
    <organismsDiffer>false</organismsDiffer>
    <experiments>10</experiments>
</comment>
<comment type="interaction">
    <interactant intactId="EBI-466029">
        <id>P42858</id>
    </interactant>
    <interactant intactId="EBI-2833130">
        <id>P48060</id>
        <label>GLIPR1</label>
    </interactant>
    <organismsDiffer>false</organismsDiffer>
    <experiments>3</experiments>
</comment>
<comment type="interaction">
    <interactant intactId="EBI-466029">
        <id>P42858</id>
    </interactant>
    <interactant intactId="EBI-715087">
        <id>P09471</id>
        <label>GNAO1</label>
    </interactant>
    <organismsDiffer>false</organismsDiffer>
    <experiments>7</experiments>
</comment>
<comment type="interaction">
    <interactant intactId="EBI-466029">
        <id>P42858</id>
    </interactant>
    <interactant intactId="EBI-357130">
        <id>P62873</id>
        <label>GNB1</label>
    </interactant>
    <organismsDiffer>false</organismsDiffer>
    <experiments>10</experiments>
</comment>
<comment type="interaction">
    <interactant intactId="EBI-466029">
        <id>P42858</id>
    </interactant>
    <interactant intactId="EBI-356942">
        <id>P62879</id>
        <label>GNB2</label>
    </interactant>
    <organismsDiffer>false</organismsDiffer>
    <experiments>10</experiments>
</comment>
<comment type="interaction">
    <interactant intactId="EBI-466029">
        <id>P42858</id>
    </interactant>
    <interactant intactId="EBI-618309">
        <id>Q08379</id>
        <label>GOLGA2</label>
    </interactant>
    <organismsDiffer>false</organismsDiffer>
    <experiments>3</experiments>
</comment>
<comment type="interaction">
    <interactant intactId="EBI-466029">
        <id>P42858</id>
    </interactant>
    <interactant intactId="EBI-4403434">
        <id>Q9H4A5</id>
        <label>GOLPH3L</label>
    </interactant>
    <organismsDiffer>false</organismsDiffer>
    <experiments>20</experiments>
</comment>
<comment type="interaction">
    <interactant intactId="EBI-466029">
        <id>P42858</id>
    </interactant>
    <interactant intactId="EBI-25896879">
        <id>Q8IYG2</id>
        <label>GPC3</label>
    </interactant>
    <organismsDiffer>false</organismsDiffer>
    <experiments>3</experiments>
</comment>
<comment type="interaction">
    <interactant intactId="EBI-466029">
        <id>P42858</id>
    </interactant>
    <interactant intactId="EBI-9080234">
        <id>Q8IV16</id>
        <label>GPIHBP1</label>
    </interactant>
    <organismsDiffer>false</organismsDiffer>
    <experiments>3</experiments>
</comment>
<comment type="interaction">
    <interactant intactId="EBI-466029">
        <id>P42858</id>
    </interactant>
    <interactant intactId="EBI-7187133">
        <id>P51674</id>
        <label>GPM6A</label>
    </interactant>
    <organismsDiffer>false</organismsDiffer>
    <experiments>4</experiments>
</comment>
<comment type="interaction">
    <interactant intactId="EBI-466029">
        <id>P42858</id>
    </interactant>
    <interactant intactId="EBI-25966592">
        <id>Q86YB0</id>
        <label>GPM6A</label>
    </interactant>
    <organismsDiffer>false</organismsDiffer>
    <experiments>3</experiments>
</comment>
<comment type="interaction">
    <interactant intactId="EBI-466029">
        <id>P42858</id>
    </interactant>
    <interactant intactId="EBI-21649723">
        <id>Q7Z602</id>
        <label>GPR141</label>
    </interactant>
    <organismsDiffer>false</organismsDiffer>
    <experiments>3</experiments>
</comment>
<comment type="interaction">
    <interactant intactId="EBI-466029">
        <id>P42858</id>
    </interactant>
    <interactant intactId="EBI-473189">
        <id>Q96D09</id>
        <label>GPRASP2</label>
    </interactant>
    <organismsDiffer>false</organismsDiffer>
    <experiments>5</experiments>
</comment>
<comment type="interaction">
    <interactant intactId="EBI-466029">
        <id>P42858</id>
    </interactant>
    <interactant intactId="EBI-749411">
        <id>Q96SL4</id>
        <label>GPX7</label>
    </interactant>
    <organismsDiffer>false</organismsDiffer>
    <experiments>3</experiments>
</comment>
<comment type="interaction">
    <interactant intactId="EBI-466029">
        <id>P42858</id>
    </interactant>
    <interactant intactId="EBI-2847510">
        <id>Q13588</id>
        <label>GRAP</label>
    </interactant>
    <organismsDiffer>false</organismsDiffer>
    <experiments>12</experiments>
</comment>
<comment type="interaction">
    <interactant intactId="EBI-466029">
        <id>P42858</id>
    </interactant>
    <interactant intactId="EBI-25832107">
        <id>Q8IY40</id>
        <label>GRIK2</label>
    </interactant>
    <organismsDiffer>false</organismsDiffer>
    <experiments>9</experiments>
</comment>
<comment type="interaction">
    <interactant intactId="EBI-466029">
        <id>P42858</id>
    </interactant>
    <interactant intactId="EBI-1044067">
        <id>P49840</id>
        <label>GSK3A</label>
    </interactant>
    <organismsDiffer>false</organismsDiffer>
    <experiments>6</experiments>
</comment>
<comment type="interaction">
    <interactant intactId="EBI-466029">
        <id>P42858</id>
    </interactant>
    <interactant intactId="EBI-1054873">
        <id>Q9Y5Q9</id>
        <label>GTF3C3</label>
    </interactant>
    <organismsDiffer>false</organismsDiffer>
    <experiments>12</experiments>
</comment>
<comment type="interaction">
    <interactant intactId="EBI-466029">
        <id>P42858</id>
    </interactant>
    <interactant intactId="EBI-1056249">
        <id>Q9BZE4</id>
        <label>GTPBP4</label>
    </interactant>
    <organismsDiffer>false</organismsDiffer>
    <experiments>3</experiments>
</comment>
<comment type="interaction">
    <interactant intactId="EBI-466029">
        <id>P42858</id>
    </interactant>
    <interactant intactId="EBI-6447217">
        <id>O75409</id>
        <label>H2AP</label>
    </interactant>
    <organismsDiffer>false</organismsDiffer>
    <experiments>16</experiments>
</comment>
<comment type="interaction">
    <interactant intactId="EBI-466029">
        <id>P42858</id>
    </interactant>
    <interactant intactId="EBI-352469">
        <id>Q93079</id>
        <label>H2BC9</label>
    </interactant>
    <organismsDiffer>false</organismsDiffer>
    <experiments>18</experiments>
</comment>
<comment type="interaction">
    <interactant intactId="EBI-466029">
        <id>P42858</id>
    </interactant>
    <interactant intactId="EBI-2868501">
        <id>Q6NXT2</id>
        <label>H3-5</label>
    </interactant>
    <organismsDiffer>false</organismsDiffer>
    <experiments>15</experiments>
</comment>
<comment type="interaction">
    <interactant intactId="EBI-466029">
        <id>P42858</id>
    </interactant>
    <interactant intactId="EBI-79722">
        <id>P68431</id>
        <label>H3C12</label>
    </interactant>
    <organismsDiffer>false</organismsDiffer>
    <experiments>20</experiments>
</comment>
<comment type="interaction">
    <interactant intactId="EBI-466029">
        <id>P42858</id>
    </interactant>
    <interactant intactId="EBI-750650">
        <id>Q71DI3</id>
        <label>H3C15</label>
    </interactant>
    <organismsDiffer>false</organismsDiffer>
    <experiments>18</experiments>
</comment>
<comment type="interaction">
    <interactant intactId="EBI-466029">
        <id>P42858</id>
    </interactant>
    <interactant intactId="EBI-302023">
        <id>P62805</id>
        <label>H4C9</label>
    </interactant>
    <organismsDiffer>false</organismsDiffer>
    <experiments>3</experiments>
</comment>
<comment type="interaction">
    <interactant intactId="EBI-466029">
        <id>P42858</id>
    </interactant>
    <interactant intactId="EBI-356720">
        <id>P40939</id>
        <label>HADHA</label>
    </interactant>
    <organismsDiffer>false</organismsDiffer>
    <experiments>3</experiments>
</comment>
<comment type="interaction">
    <interactant intactId="EBI-466029">
        <id>P42858</id>
    </interactant>
    <interactant intactId="EBI-9392340">
        <id>P54257-2</id>
        <label>HAP1</label>
    </interactant>
    <organismsDiffer>false</organismsDiffer>
    <experiments>8</experiments>
</comment>
<comment type="interaction">
    <interactant intactId="EBI-466029">
        <id>P42858</id>
    </interactant>
    <interactant intactId="EBI-395719">
        <id>Q99871</id>
        <label>HAUS7</label>
    </interactant>
    <organismsDiffer>false</organismsDiffer>
    <experiments>18</experiments>
</comment>
<comment type="interaction">
    <interactant intactId="EBI-466029">
        <id>P42858</id>
    </interactant>
    <interactant intactId="EBI-357001">
        <id>O00165</id>
        <label>HAX1</label>
    </interactant>
    <organismsDiffer>false</organismsDiffer>
    <experiments>14</experiments>
</comment>
<comment type="interaction">
    <interactant intactId="EBI-466029">
        <id>P42858</id>
    </interactant>
    <interactant intactId="EBI-10267476">
        <id>Q8N779</id>
        <label>hCG_1998195</label>
    </interactant>
    <organismsDiffer>false</organismsDiffer>
    <experiments>15</experiments>
</comment>
<comment type="interaction">
    <interactant intactId="EBI-466029">
        <id>P42858</id>
    </interactant>
    <interactant intactId="EBI-301762">
        <id>Q969S8</id>
        <label>HDAC10</label>
    </interactant>
    <organismsDiffer>false</organismsDiffer>
    <experiments>21</experiments>
</comment>
<comment type="interaction">
    <interactant intactId="EBI-466029">
        <id>P42858</id>
    </interactant>
    <interactant intactId="EBI-301697">
        <id>Q9UBN7</id>
        <label>HDAC6</label>
    </interactant>
    <organismsDiffer>false</organismsDiffer>
    <experiments>9</experiments>
</comment>
<comment type="interaction">
    <interactant intactId="EBI-466029">
        <id>P42858</id>
    </interactant>
    <interactant intactId="EBI-2680288">
        <id>Q9HCC6</id>
        <label>HES4</label>
    </interactant>
    <organismsDiffer>false</organismsDiffer>
    <experiments>12</experiments>
</comment>
<comment type="interaction">
    <interactant intactId="EBI-466029">
        <id>P42858</id>
    </interactant>
    <interactant intactId="EBI-750630">
        <id>Q9UBP5</id>
        <label>HEY2</label>
    </interactant>
    <organismsDiffer>false</organismsDiffer>
    <experiments>2</experiments>
</comment>
<comment type="interaction">
    <interactant intactId="EBI-466029">
        <id>P42858</id>
    </interactant>
    <interactant intactId="EBI-473886">
        <id>O00291</id>
        <label>HIP1</label>
    </interactant>
    <organismsDiffer>false</organismsDiffer>
    <experiments>7</experiments>
</comment>
<comment type="interaction">
    <interactant intactId="EBI-466029">
        <id>P42858</id>
    </interactant>
    <interactant intactId="EBI-723624">
        <id>Q9BW71</id>
        <label>HIRIP3</label>
    </interactant>
    <organismsDiffer>false</organismsDiffer>
    <experiments>6</experiments>
</comment>
<comment type="interaction">
    <interactant intactId="EBI-466029">
        <id>P42858</id>
    </interactant>
    <interactant intactId="EBI-2965780">
        <id>P52790</id>
        <label>HK3</label>
    </interactant>
    <organismsDiffer>false</organismsDiffer>
    <experiments>3</experiments>
</comment>
<comment type="interaction">
    <interactant intactId="EBI-466029">
        <id>P42858</id>
    </interactant>
    <interactant intactId="EBI-9090148">
        <id>P08397</id>
        <label>HMBS</label>
    </interactant>
    <organismsDiffer>false</organismsDiffer>
    <experiments>3</experiments>
</comment>
<comment type="interaction">
    <interactant intactId="EBI-466029">
        <id>P42858</id>
    </interactant>
    <interactant intactId="EBI-740641">
        <id>Q9NP66</id>
        <label>HMG20A</label>
    </interactant>
    <organismsDiffer>false</organismsDiffer>
    <experiments>2</experiments>
</comment>
<comment type="interaction">
    <interactant intactId="EBI-466029">
        <id>P42858</id>
    </interactant>
    <interactant intactId="EBI-713401">
        <id>Q9P0W2</id>
        <label>HMG20B</label>
    </interactant>
    <organismsDiffer>false</organismsDiffer>
    <experiments>3</experiments>
</comment>
<comment type="interaction">
    <interactant intactId="EBI-466029">
        <id>P42858</id>
    </interactant>
    <interactant intactId="EBI-389432">
        <id>P09429</id>
        <label>HMGB1</label>
    </interactant>
    <organismsDiffer>false</organismsDiffer>
    <experiments>13</experiments>
</comment>
<comment type="interaction">
    <interactant intactId="EBI-466029">
        <id>P42858</id>
    </interactant>
    <interactant intactId="EBI-357966">
        <id>P07910</id>
        <label>HNRNPC</label>
    </interactant>
    <organismsDiffer>false</organismsDiffer>
    <experiments>7</experiments>
</comment>
<comment type="interaction">
    <interactant intactId="EBI-466029">
        <id>P42858</id>
    </interactant>
    <interactant intactId="EBI-5280084">
        <id>P07910-2</id>
        <label>HNRNPC</label>
    </interactant>
    <organismsDiffer>false</organismsDiffer>
    <experiments>9</experiments>
</comment>
<comment type="interaction">
    <interactant intactId="EBI-466029">
        <id>P42858</id>
    </interactant>
    <interactant intactId="EBI-304185">
        <id>P61978</id>
        <label>HNRNPK</label>
    </interactant>
    <organismsDiffer>false</organismsDiffer>
    <experiments>12</experiments>
</comment>
<comment type="interaction">
    <interactant intactId="EBI-466029">
        <id>P42858</id>
    </interactant>
    <interactant intactId="EBI-8470697">
        <id>P20719</id>
        <label>HOXA5</label>
    </interactant>
    <organismsDiffer>false</organismsDiffer>
    <experiments>9</experiments>
</comment>
<comment type="interaction">
    <interactant intactId="EBI-466029">
        <id>P42858</id>
    </interactant>
    <interactant intactId="EBI-2652631">
        <id>O43248</id>
        <label>HOXC11</label>
    </interactant>
    <organismsDiffer>false</organismsDiffer>
    <experiments>7</experiments>
</comment>
<comment type="interaction">
    <interactant intactId="EBI-466029">
        <id>P42858</id>
    </interactant>
    <interactant intactId="EBI-3923226">
        <id>P09017</id>
        <label>HOXC4</label>
    </interactant>
    <organismsDiffer>false</organismsDiffer>
    <experiments>16</experiments>
</comment>
<comment type="interaction">
    <interactant intactId="EBI-466029">
        <id>P42858</id>
    </interactant>
    <interactant intactId="EBI-748210">
        <id>P00492</id>
        <label>HPRT1</label>
    </interactant>
    <organismsDiffer>false</organismsDiffer>
    <experiments>15</experiments>
</comment>
<comment type="interaction">
    <interactant intactId="EBI-466029">
        <id>P42858</id>
    </interactant>
    <interactant intactId="EBI-11052499">
        <id>P0DMV8</id>
        <label>HSPA1A</label>
    </interactant>
    <organismsDiffer>false</organismsDiffer>
    <experiments>9</experiments>
</comment>
<comment type="interaction">
    <interactant intactId="EBI-466029">
        <id>P42858</id>
    </interactant>
    <interactant intactId="EBI-356991">
        <id>P54652</id>
        <label>HSPA2</label>
    </interactant>
    <organismsDiffer>false</organismsDiffer>
    <experiments>3</experiments>
</comment>
<comment type="interaction">
    <interactant intactId="EBI-466029">
        <id>P42858</id>
    </interactant>
    <interactant intactId="EBI-351896">
        <id>P11142</id>
        <label>HSPA8</label>
    </interactant>
    <organismsDiffer>false</organismsDiffer>
    <experiments>14</experiments>
</comment>
<comment type="interaction">
    <interactant intactId="EBI-466029">
        <id>P42858</id>
    </interactant>
    <interactant intactId="EBI-466029">
        <id>P42858</id>
        <label>HTT</label>
    </interactant>
    <organismsDiffer>false</organismsDiffer>
    <experiments>11</experiments>
</comment>
<comment type="interaction">
    <interactant intactId="EBI-466029">
        <id>P42858</id>
    </interactant>
    <interactant intactId="EBI-2806068">
        <id>Q12891</id>
        <label>HYAL2</label>
    </interactant>
    <organismsDiffer>false</organismsDiffer>
    <experiments>9</experiments>
</comment>
<comment type="interaction">
    <interactant intactId="EBI-466029">
        <id>P42858</id>
    </interactant>
    <interactant intactId="EBI-1048743">
        <id>Q9NX55</id>
        <label>HYPK</label>
    </interactant>
    <organismsDiffer>false</organismsDiffer>
    <experiments>4</experiments>
</comment>
<comment type="interaction">
    <interactant intactId="EBI-466029">
        <id>P42858</id>
    </interactant>
    <interactant intactId="EBI-713450">
        <id>Q02363</id>
        <label>ID2</label>
    </interactant>
    <organismsDiffer>false</organismsDiffer>
    <experiments>6</experiments>
</comment>
<comment type="interaction">
    <interactant intactId="EBI-466029">
        <id>P42858</id>
    </interactant>
    <interactant intactId="EBI-11742277">
        <id>Q8IY31-2</id>
        <label>IFT20</label>
    </interactant>
    <organismsDiffer>false</organismsDiffer>
    <experiments>6</experiments>
</comment>
<comment type="interaction">
    <interactant intactId="EBI-466029">
        <id>P42858</id>
    </interactant>
    <interactant intactId="EBI-9091197">
        <id>Q8IY31-3</id>
        <label>IFT20</label>
    </interactant>
    <organismsDiffer>false</organismsDiffer>
    <experiments>18</experiments>
</comment>
<comment type="interaction">
    <interactant intactId="EBI-466029">
        <id>P42858</id>
    </interactant>
    <interactant intactId="EBI-725672">
        <id>Q9NWB7</id>
        <label>IFT57</label>
    </interactant>
    <organismsDiffer>false</organismsDiffer>
    <experiments>3</experiments>
</comment>
<comment type="interaction">
    <interactant intactId="EBI-466029">
        <id>P42858</id>
    </interactant>
    <interactant intactId="EBI-2831948">
        <id>P22692</id>
        <label>IGFBP4</label>
    </interactant>
    <organismsDiffer>false</organismsDiffer>
    <experiments>6</experiments>
</comment>
<comment type="interaction">
    <interactant intactId="EBI-466029">
        <id>P42858</id>
    </interactant>
    <interactant intactId="EBI-17178971">
        <id>Q14005-2</id>
        <label>IL16</label>
    </interactant>
    <organismsDiffer>false</organismsDiffer>
    <experiments>15</experiments>
</comment>
<comment type="interaction">
    <interactant intactId="EBI-466029">
        <id>P42858</id>
    </interactant>
    <interactant intactId="EBI-473801">
        <id>Q16891</id>
        <label>IMMT</label>
    </interactant>
    <organismsDiffer>false</organismsDiffer>
    <experiments>7</experiments>
</comment>
<comment type="interaction">
    <interactant intactId="EBI-466029">
        <id>P42858</id>
    </interactant>
    <interactant intactId="EBI-12330251">
        <id>P29218-3</id>
        <label>IMPA1</label>
    </interactant>
    <organismsDiffer>false</organismsDiffer>
    <experiments>6</experiments>
</comment>
<comment type="interaction">
    <interactant intactId="EBI-466029">
        <id>P42858</id>
    </interactant>
    <interactant intactId="EBI-2866661">
        <id>Q9UNL4</id>
        <label>ING4</label>
    </interactant>
    <organismsDiffer>false</organismsDiffer>
    <experiments>3</experiments>
</comment>
<comment type="interaction">
    <interactant intactId="EBI-466029">
        <id>P42858</id>
    </interactant>
    <interactant intactId="EBI-21602071">
        <id>Q8WYH8-2</id>
        <label>ING5</label>
    </interactant>
    <organismsDiffer>false</organismsDiffer>
    <experiments>18</experiments>
</comment>
<comment type="interaction">
    <interactant intactId="EBI-466029">
        <id>P42858</id>
    </interactant>
    <interactant intactId="EBI-769401">
        <id>Q8NBZ0</id>
        <label>INO80E</label>
    </interactant>
    <organismsDiffer>false</organismsDiffer>
    <experiments>3</experiments>
</comment>
<comment type="interaction">
    <interactant intactId="EBI-466029">
        <id>P42858</id>
    </interactant>
    <interactant intactId="EBI-395967">
        <id>Q8TEX9</id>
        <label>IPO4</label>
    </interactant>
    <organismsDiffer>false</organismsDiffer>
    <experiments>7</experiments>
</comment>
<comment type="interaction">
    <interactant intactId="EBI-466029">
        <id>P42858</id>
    </interactant>
    <interactant intactId="EBI-9641587">
        <id>O00410-3</id>
        <label>IPO5</label>
    </interactant>
    <organismsDiffer>false</organismsDiffer>
    <experiments>3</experiments>
</comment>
<comment type="interaction">
    <interactant intactId="EBI-466029">
        <id>P42858</id>
    </interactant>
    <interactant intactId="EBI-21911304">
        <id>Q6DN90-2</id>
        <label>IQSEC1</label>
    </interactant>
    <organismsDiffer>false</organismsDiffer>
    <experiments>18</experiments>
</comment>
<comment type="interaction">
    <interactant intactId="EBI-466029">
        <id>P42858</id>
    </interactant>
    <interactant intactId="EBI-2680803">
        <id>Q96N16</id>
        <label>JAKMIP1</label>
    </interactant>
    <organismsDiffer>false</organismsDiffer>
    <experiments>10</experiments>
</comment>
<comment type="interaction">
    <interactant intactId="EBI-466029">
        <id>P42858</id>
    </interactant>
    <interactant intactId="EBI-399080">
        <id>Q92993</id>
        <label>KAT5</label>
    </interactant>
    <organismsDiffer>false</organismsDiffer>
    <experiments>15</experiments>
</comment>
<comment type="interaction">
    <interactant intactId="EBI-466029">
        <id>P42858</id>
    </interactant>
    <interactant intactId="EBI-948729">
        <id>Q13303</id>
        <label>KCNAB2</label>
    </interactant>
    <organismsDiffer>false</organismsDiffer>
    <experiments>3</experiments>
</comment>
<comment type="interaction">
    <interactant intactId="EBI-466029">
        <id>P42858</id>
    </interactant>
    <interactant intactId="EBI-7932244">
        <id>Q9Y691</id>
        <label>KCNMB2</label>
    </interactant>
    <organismsDiffer>false</organismsDiffer>
    <experiments>3</experiments>
</comment>
<comment type="interaction">
    <interactant intactId="EBI-466029">
        <id>P42858</id>
    </interactant>
    <interactant intactId="EBI-12382297">
        <id>Q96SI1-2</id>
        <label>KCTD15</label>
    </interactant>
    <organismsDiffer>false</organismsDiffer>
    <experiments>6</experiments>
</comment>
<comment type="interaction">
    <interactant intactId="EBI-466029">
        <id>P42858</id>
    </interactant>
    <interactant intactId="EBI-743960">
        <id>Q8N5Z5</id>
        <label>KCTD17</label>
    </interactant>
    <organismsDiffer>false</organismsDiffer>
    <experiments>3</experiments>
</comment>
<comment type="interaction">
    <interactant intactId="EBI-466029">
        <id>P42858</id>
    </interactant>
    <interactant intactId="EBI-20764875">
        <id>A0A384DVV8</id>
        <label>KIAA0040</label>
    </interactant>
    <organismsDiffer>false</organismsDiffer>
    <experiments>3</experiments>
</comment>
<comment type="interaction">
    <interactant intactId="EBI-466029">
        <id>P42858</id>
    </interactant>
    <interactant intactId="EBI-739493">
        <id>Q6ZU52</id>
        <label>KIAA0408</label>
    </interactant>
    <organismsDiffer>false</organismsDiffer>
    <experiments>6</experiments>
</comment>
<comment type="interaction">
    <interactant intactId="EBI-466029">
        <id>P42858</id>
    </interactant>
    <interactant intactId="EBI-10188326">
        <id>Q5T5P2-6</id>
        <label>KIAA1217</label>
    </interactant>
    <organismsDiffer>false</organismsDiffer>
    <experiments>3</experiments>
</comment>
<comment type="interaction">
    <interactant intactId="EBI-466029">
        <id>P42858</id>
    </interactant>
    <interactant intactId="EBI-948266">
        <id>O14901</id>
        <label>KLF11</label>
    </interactant>
    <organismsDiffer>false</organismsDiffer>
    <experiments>7</experiments>
</comment>
<comment type="interaction">
    <interactant intactId="EBI-466029">
        <id>P42858</id>
    </interactant>
    <interactant intactId="EBI-750750">
        <id>Q9Y4X4</id>
        <label>KLF12</label>
    </interactant>
    <organismsDiffer>false</organismsDiffer>
    <experiments>3</experiments>
</comment>
<comment type="interaction">
    <interactant intactId="EBI-466029">
        <id>P42858</id>
    </interactant>
    <interactant intactId="EBI-8472267">
        <id>P57682</id>
        <label>KLF3</label>
    </interactant>
    <organismsDiffer>false</organismsDiffer>
    <experiments>6</experiments>
</comment>
<comment type="interaction">
    <interactant intactId="EBI-466029">
        <id>P42858</id>
    </interactant>
    <interactant intactId="EBI-740929">
        <id>Q53G59</id>
        <label>KLHL12</label>
    </interactant>
    <organismsDiffer>false</organismsDiffer>
    <experiments>3</experiments>
</comment>
<comment type="interaction">
    <interactant intactId="EBI-466029">
        <id>P42858</id>
    </interactant>
    <interactant intactId="EBI-714379">
        <id>Q9Y2M5</id>
        <label>KLHL20</label>
    </interactant>
    <organismsDiffer>false</organismsDiffer>
    <experiments>9</experiments>
</comment>
<comment type="interaction">
    <interactant intactId="EBI-466029">
        <id>P42858</id>
    </interactant>
    <interactant intactId="EBI-3915857">
        <id>O60259</id>
        <label>KLK8</label>
    </interactant>
    <organismsDiffer>false</organismsDiffer>
    <experiments>3</experiments>
</comment>
<comment type="interaction">
    <interactant intactId="EBI-466029">
        <id>P42858</id>
    </interactant>
    <interactant intactId="EBI-21870540">
        <id>O15229-2</id>
        <label>KMO</label>
    </interactant>
    <organismsDiffer>false</organismsDiffer>
    <experiments>3</experiments>
</comment>
<comment type="interaction">
    <interactant intactId="EBI-466029">
        <id>P42858</id>
    </interactant>
    <interactant intactId="EBI-373334">
        <id>Q9Y448</id>
        <label>KNSTRN</label>
    </interactant>
    <organismsDiffer>false</organismsDiffer>
    <experiments>3</experiments>
</comment>
<comment type="interaction">
    <interactant intactId="EBI-466029">
        <id>P42858</id>
    </interactant>
    <interactant intactId="EBI-358297">
        <id>O00505</id>
        <label>KPNA3</label>
    </interactant>
    <organismsDiffer>false</organismsDiffer>
    <experiments>11</experiments>
</comment>
<comment type="interaction">
    <interactant intactId="EBI-466029">
        <id>P42858</id>
    </interactant>
    <interactant intactId="EBI-297888">
        <id>P05783</id>
        <label>KRT18</label>
    </interactant>
    <organismsDiffer>false</organismsDiffer>
    <experiments>6</experiments>
</comment>
<comment type="interaction">
    <interactant intactId="EBI-466029">
        <id>P42858</id>
    </interactant>
    <interactant intactId="EBI-742756">
        <id>P08727</id>
        <label>KRT19</label>
    </interactant>
    <organismsDiffer>false</organismsDiffer>
    <experiments>6</experiments>
</comment>
<comment type="interaction">
    <interactant intactId="EBI-466029">
        <id>P42858</id>
    </interactant>
    <interactant intactId="EBI-742094">
        <id>P35900</id>
        <label>KRT20</label>
    </interactant>
    <organismsDiffer>false</organismsDiffer>
    <experiments>9</experiments>
</comment>
<comment type="interaction">
    <interactant intactId="EBI-466029">
        <id>P42858</id>
    </interactant>
    <interactant intactId="EBI-1049638">
        <id>Q14525</id>
        <label>KRT33B</label>
    </interactant>
    <organismsDiffer>false</organismsDiffer>
    <experiments>12</experiments>
</comment>
<comment type="interaction">
    <interactant intactId="EBI-466029">
        <id>P42858</id>
    </interactant>
    <interactant intactId="EBI-10172290">
        <id>P60409</id>
        <label>KRTAP10-7</label>
    </interactant>
    <organismsDiffer>false</organismsDiffer>
    <experiments>9</experiments>
</comment>
<comment type="interaction">
    <interactant intactId="EBI-466029">
        <id>P42858</id>
    </interactant>
    <interactant intactId="EBI-1052037">
        <id>Q8IUC1</id>
        <label>KRTAP11-1</label>
    </interactant>
    <organismsDiffer>false</organismsDiffer>
    <experiments>3</experiments>
</comment>
<comment type="interaction">
    <interactant intactId="EBI-466029">
        <id>P42858</id>
    </interactant>
    <interactant intactId="EBI-10261141">
        <id>Q8IUC2</id>
        <label>KRTAP8-1</label>
    </interactant>
    <organismsDiffer>false</organismsDiffer>
    <experiments>6</experiments>
</comment>
<comment type="interaction">
    <interactant intactId="EBI-466029">
        <id>P42858</id>
    </interactant>
    <interactant intactId="EBI-1044640">
        <id>Q9BYQ4</id>
        <label>KRTAP9-2</label>
    </interactant>
    <organismsDiffer>false</organismsDiffer>
    <experiments>9</experiments>
</comment>
<comment type="interaction">
    <interactant intactId="EBI-466029">
        <id>P42858</id>
    </interactant>
    <interactant intactId="EBI-11985629">
        <id>Q96JM7-2</id>
        <label>L3MBTL3</label>
    </interactant>
    <organismsDiffer>false</organismsDiffer>
    <experiments>3</experiments>
</comment>
<comment type="interaction">
    <interactant intactId="EBI-466029">
        <id>P42858</id>
    </interactant>
    <interactant intactId="EBI-3046631">
        <id>O43813</id>
        <label>LANCL1</label>
    </interactant>
    <organismsDiffer>false</organismsDiffer>
    <experiments>10</experiments>
</comment>
<comment type="interaction">
    <interactant intactId="EBI-466029">
        <id>P42858</id>
    </interactant>
    <interactant intactId="EBI-1052558">
        <id>Q92615</id>
        <label>LARP4B</label>
    </interactant>
    <organismsDiffer>false</organismsDiffer>
    <experiments>3</experiments>
</comment>
<comment type="interaction">
    <interactant intactId="EBI-466029">
        <id>P42858</id>
    </interactant>
    <interactant intactId="EBI-8473670">
        <id>O95447</id>
        <label>LCA5L</label>
    </interactant>
    <organismsDiffer>false</organismsDiffer>
    <experiments>18</experiments>
</comment>
<comment type="interaction">
    <interactant intactId="EBI-466029">
        <id>P42858</id>
    </interactant>
    <interactant intactId="EBI-10245913">
        <id>Q5T7P3</id>
        <label>LCE1B</label>
    </interactant>
    <organismsDiffer>false</organismsDiffer>
    <experiments>15</experiments>
</comment>
<comment type="interaction">
    <interactant intactId="EBI-466029">
        <id>P42858</id>
    </interactant>
    <interactant intactId="EBI-11979761">
        <id>Q86U70-2</id>
        <label>LDB1</label>
    </interactant>
    <organismsDiffer>false</organismsDiffer>
    <experiments>3</experiments>
</comment>
<comment type="interaction">
    <interactant intactId="EBI-466029">
        <id>P42858</id>
    </interactant>
    <interactant intactId="EBI-1108377">
        <id>Q9BYZ2</id>
        <label>LDHAL6B</label>
    </interactant>
    <organismsDiffer>false</organismsDiffer>
    <experiments>18</experiments>
</comment>
<comment type="interaction">
    <interactant intactId="EBI-466029">
        <id>P42858</id>
    </interactant>
    <interactant intactId="EBI-358748">
        <id>P07195</id>
        <label>LDHB</label>
    </interactant>
    <organismsDiffer>false</organismsDiffer>
    <experiments>9</experiments>
</comment>
<comment type="interaction">
    <interactant intactId="EBI-466029">
        <id>P42858</id>
    </interactant>
    <interactant intactId="EBI-740738">
        <id>O95751</id>
        <label>LDOC1</label>
    </interactant>
    <organismsDiffer>false</organismsDiffer>
    <experiments>5</experiments>
</comment>
<comment type="interaction">
    <interactant intactId="EBI-466029">
        <id>P42858</id>
    </interactant>
    <interactant intactId="EBI-10274069">
        <id>Q8TCE9</id>
        <label>LGALS14</label>
    </interactant>
    <organismsDiffer>false</organismsDiffer>
    <experiments>3</experiments>
</comment>
<comment type="interaction">
    <interactant intactId="EBI-466029">
        <id>P42858</id>
    </interactant>
    <interactant intactId="EBI-25835523">
        <id>Q9H2C1</id>
        <label>LHX5</label>
    </interactant>
    <organismsDiffer>false</organismsDiffer>
    <experiments>15</experiments>
</comment>
<comment type="interaction">
    <interactant intactId="EBI-466029">
        <id>P42858</id>
    </interactant>
    <interactant intactId="EBI-10258746">
        <id>Q9UPM6</id>
        <label>LHX6</label>
    </interactant>
    <organismsDiffer>false</organismsDiffer>
    <experiments>12</experiments>
</comment>
<comment type="interaction">
    <interactant intactId="EBI-466029">
        <id>P42858</id>
    </interactant>
    <interactant intactId="EBI-8474075">
        <id>Q68G74</id>
        <label>LHX8</label>
    </interactant>
    <organismsDiffer>false</organismsDiffer>
    <experiments>12</experiments>
</comment>
<comment type="interaction">
    <interactant intactId="EBI-466029">
        <id>P42858</id>
    </interactant>
    <interactant intactId="EBI-2462365">
        <id>Q9H9Z2</id>
        <label>LIN28A</label>
    </interactant>
    <organismsDiffer>false</organismsDiffer>
    <experiments>18</experiments>
</comment>
<comment type="interaction">
    <interactant intactId="EBI-466029">
        <id>P42858</id>
    </interactant>
    <interactant intactId="EBI-10264791">
        <id>Q8N0U6</id>
        <label>LINC00518</label>
    </interactant>
    <organismsDiffer>false</organismsDiffer>
    <experiments>6</experiments>
</comment>
<comment type="interaction">
    <interactant intactId="EBI-466029">
        <id>P42858</id>
    </interactant>
    <interactant intactId="EBI-9091707">
        <id>Q9H0V9</id>
        <label>LMAN2L</label>
    </interactant>
    <organismsDiffer>false</organismsDiffer>
    <experiments>3</experiments>
</comment>
<comment type="interaction">
    <interactant intactId="EBI-466029">
        <id>P42858</id>
    </interactant>
    <interactant intactId="EBI-739832">
        <id>Q8TBB1</id>
        <label>LNX1</label>
    </interactant>
    <organismsDiffer>false</organismsDiffer>
    <experiments>6</experiments>
</comment>
<comment type="interaction">
    <interactant intactId="EBI-466029">
        <id>P42858</id>
    </interactant>
    <interactant intactId="EBI-2340947">
        <id>Q8N448</id>
        <label>LNX2</label>
    </interactant>
    <organismsDiffer>false</organismsDiffer>
    <experiments>3</experiments>
</comment>
<comment type="interaction">
    <interactant intactId="EBI-466029">
        <id>P42858</id>
    </interactant>
    <interactant intactId="EBI-9088215">
        <id>A2RU56</id>
        <label>LOC401296</label>
    </interactant>
    <organismsDiffer>false</organismsDiffer>
    <experiments>9</experiments>
</comment>
<comment type="interaction">
    <interactant intactId="EBI-466029">
        <id>P42858</id>
    </interactant>
    <interactant intactId="EBI-2510853">
        <id>Q1L5Z9</id>
        <label>LONRF2</label>
    </interactant>
    <organismsDiffer>false</organismsDiffer>
    <experiments>3</experiments>
</comment>
<comment type="interaction">
    <interactant intactId="EBI-466029">
        <id>P42858</id>
    </interactant>
    <interactant intactId="EBI-5278370">
        <id>Q14693</id>
        <label>LPIN1</label>
    </interactant>
    <organismsDiffer>false</organismsDiffer>
    <experiments>12</experiments>
</comment>
<comment type="interaction">
    <interactant intactId="EBI-466029">
        <id>P42858</id>
    </interactant>
    <interactant intactId="EBI-2805176">
        <id>Q96CN5</id>
        <label>LRRC45</label>
    </interactant>
    <organismsDiffer>false</organismsDiffer>
    <experiments>3</experiments>
</comment>
<comment type="interaction">
    <interactant intactId="EBI-466029">
        <id>P42858</id>
    </interactant>
    <interactant intactId="EBI-1369100">
        <id>Q32MZ4</id>
        <label>LRRFIP1</label>
    </interactant>
    <organismsDiffer>false</organismsDiffer>
    <experiments>3</experiments>
</comment>
<comment type="interaction">
    <interactant intactId="EBI-466029">
        <id>P42858</id>
    </interactant>
    <interactant intactId="EBI-347779">
        <id>O95777</id>
        <label>LSM8</label>
    </interactant>
    <organismsDiffer>false</organismsDiffer>
    <experiments>15</experiments>
</comment>
<comment type="interaction">
    <interactant intactId="EBI-466029">
        <id>P42858</id>
    </interactant>
    <interactant intactId="EBI-352851">
        <id>Q9Y383</id>
        <label>LUC7L2</label>
    </interactant>
    <organismsDiffer>false</organismsDiffer>
    <experiments>9</experiments>
</comment>
<comment type="interaction">
    <interactant intactId="EBI-466029">
        <id>P42858</id>
    </interactant>
    <interactant intactId="EBI-13309213">
        <id>Q8N1E2</id>
        <label>LYG1</label>
    </interactant>
    <organismsDiffer>false</organismsDiffer>
    <experiments>3</experiments>
</comment>
<comment type="interaction">
    <interactant intactId="EBI-466029">
        <id>P42858</id>
    </interactant>
    <interactant intactId="EBI-720354">
        <id>Q9H063</id>
        <label>MAF1</label>
    </interactant>
    <organismsDiffer>false</organismsDiffer>
    <experiments>3</experiments>
</comment>
<comment type="interaction">
    <interactant intactId="EBI-466029">
        <id>P42858</id>
    </interactant>
    <interactant intactId="EBI-5651459">
        <id>P43357</id>
        <label>MAGEA3</label>
    </interactant>
    <organismsDiffer>false</organismsDiffer>
    <experiments>6</experiments>
</comment>
<comment type="interaction">
    <interactant intactId="EBI-466029">
        <id>P42858</id>
    </interactant>
    <interactant intactId="EBI-741835">
        <id>Q96M61</id>
        <label>MAGEB18</label>
    </interactant>
    <organismsDiffer>false</organismsDiffer>
    <experiments>16</experiments>
</comment>
<comment type="interaction">
    <interactant intactId="EBI-466029">
        <id>P42858</id>
    </interactant>
    <interactant intactId="EBI-6447163">
        <id>Q8N7X4</id>
        <label>MAGEB6</label>
    </interactant>
    <organismsDiffer>false</organismsDiffer>
    <experiments>2</experiments>
</comment>
<comment type="interaction">
    <interactant intactId="EBI-466029">
        <id>P42858</id>
    </interactant>
    <interactant intactId="EBI-2339737">
        <id>Q96EH3</id>
        <label>MALSU1</label>
    </interactant>
    <organismsDiffer>false</organismsDiffer>
    <experiments>6</experiments>
</comment>
<comment type="interaction">
    <interactant intactId="EBI-466029">
        <id>P42858</id>
    </interactant>
    <interactant intactId="EBI-476263">
        <id>Q99683</id>
        <label>MAP3K5</label>
    </interactant>
    <organismsDiffer>false</organismsDiffer>
    <experiments>6</experiments>
</comment>
<comment type="interaction">
    <interactant intactId="EBI-466029">
        <id>P42858</id>
    </interactant>
    <interactant intactId="EBI-967087">
        <id>Q00266</id>
        <label>MAT1A</label>
    </interactant>
    <organismsDiffer>false</organismsDiffer>
    <experiments>3</experiments>
</comment>
<comment type="interaction">
    <interactant intactId="EBI-466029">
        <id>P42858</id>
    </interactant>
    <interactant intactId="EBI-352602">
        <id>P43243</id>
        <label>MATR3</label>
    </interactant>
    <organismsDiffer>false</organismsDiffer>
    <experiments>4</experiments>
</comment>
<comment type="interaction">
    <interactant intactId="EBI-466029">
        <id>P42858</id>
    </interactant>
    <interactant intactId="EBI-12068586">
        <id>P56270-2</id>
        <label>MAZ</label>
    </interactant>
    <organismsDiffer>false</organismsDiffer>
    <experiments>3</experiments>
</comment>
<comment type="interaction">
    <interactant intactId="EBI-466029">
        <id>P42858</id>
    </interactant>
    <interactant intactId="EBI-867196">
        <id>Q9UIS9</id>
        <label>MBD1</label>
    </interactant>
    <organismsDiffer>false</organismsDiffer>
    <experiments>2</experiments>
</comment>
<comment type="interaction">
    <interactant intactId="EBI-466029">
        <id>P42858</id>
    </interactant>
    <interactant intactId="EBI-6448717">
        <id>O95243-2</id>
        <label>MBD4</label>
    </interactant>
    <organismsDiffer>false</organismsDiffer>
    <experiments>19</experiments>
</comment>
<comment type="interaction">
    <interactant intactId="EBI-466029">
        <id>P42858</id>
    </interactant>
    <interactant intactId="EBI-348259">
        <id>Q96EZ8</id>
        <label>MCRS1</label>
    </interactant>
    <organismsDiffer>false</organismsDiffer>
    <experiments>3</experiments>
</comment>
<comment type="interaction">
    <interactant intactId="EBI-466029">
        <id>P42858</id>
    </interactant>
    <interactant intactId="EBI-399266">
        <id>Q9HAF1</id>
        <label>MEAF6</label>
    </interactant>
    <organismsDiffer>false</organismsDiffer>
    <experiments>6</experiments>
</comment>
<comment type="interaction">
    <interactant intactId="EBI-466029">
        <id>P42858</id>
    </interactant>
    <interactant intactId="EBI-1189067">
        <id>P51608</id>
        <label>MECP2</label>
    </interactant>
    <organismsDiffer>false</organismsDiffer>
    <experiments>18</experiments>
</comment>
<comment type="interaction">
    <interactant intactId="EBI-466029">
        <id>P42858</id>
    </interactant>
    <interactant intactId="EBI-394506">
        <id>Q96RN5</id>
        <label>MED15</label>
    </interactant>
    <organismsDiffer>false</organismsDiffer>
    <experiments>3</experiments>
</comment>
<comment type="interaction">
    <interactant intactId="EBI-466029">
        <id>P42858</id>
    </interactant>
    <interactant intactId="EBI-11030807">
        <id>Q96RN5-2</id>
        <label>MED15</label>
    </interactant>
    <organismsDiffer>false</organismsDiffer>
    <experiments>6</experiments>
</comment>
<comment type="interaction">
    <interactant intactId="EBI-466029">
        <id>P42858</id>
    </interactant>
    <interactant intactId="EBI-12954271">
        <id>Q15528-2</id>
        <label>MED22</label>
    </interactant>
    <organismsDiffer>false</organismsDiffer>
    <experiments>12</experiments>
</comment>
<comment type="interaction">
    <interactant intactId="EBI-466029">
        <id>P42858</id>
    </interactant>
    <interactant intactId="EBI-514199">
        <id>Q9H204</id>
        <label>MED28</label>
    </interactant>
    <organismsDiffer>false</organismsDiffer>
    <experiments>9</experiments>
</comment>
<comment type="interaction">
    <interactant intactId="EBI-466029">
        <id>P42858</id>
    </interactant>
    <interactant intactId="EBI-394659">
        <id>Q96HR3</id>
        <label>MED30</label>
    </interactant>
    <organismsDiffer>false</organismsDiffer>
    <experiments>3</experiments>
</comment>
<comment type="interaction">
    <interactant intactId="EBI-466029">
        <id>P42858</id>
    </interactant>
    <interactant intactId="EBI-394707">
        <id>Q9Y3C7</id>
        <label>MED31</label>
    </interactant>
    <organismsDiffer>false</organismsDiffer>
    <experiments>9</experiments>
</comment>
<comment type="interaction">
    <interactant intactId="EBI-466029">
        <id>P42858</id>
    </interactant>
    <interactant intactId="EBI-2864512">
        <id>P50221</id>
        <label>MEOX1</label>
    </interactant>
    <organismsDiffer>false</organismsDiffer>
    <experiments>19</experiments>
</comment>
<comment type="interaction">
    <interactant intactId="EBI-466029">
        <id>P42858</id>
    </interactant>
    <interactant intactId="EBI-8487781">
        <id>Q8N6F8</id>
        <label>METTL27</label>
    </interactant>
    <organismsDiffer>false</organismsDiffer>
    <experiments>9</experiments>
</comment>
<comment type="interaction">
    <interactant intactId="EBI-466029">
        <id>P42858</id>
    </interactant>
    <interactant intactId="EBI-4397720">
        <id>Q8TDB4</id>
        <label>MGARP</label>
    </interactant>
    <organismsDiffer>false</organismsDiffer>
    <experiments>21</experiments>
</comment>
<comment type="interaction">
    <interactant intactId="EBI-466029">
        <id>P42858</id>
    </interactant>
    <interactant intactId="EBI-2804835">
        <id>O94851</id>
        <label>MICAL2</label>
    </interactant>
    <organismsDiffer>false</organismsDiffer>
    <experiments>3</experiments>
</comment>
<comment type="interaction">
    <interactant intactId="EBI-466029">
        <id>P42858</id>
    </interactant>
    <interactant intactId="EBI-21250407">
        <id>A4FUJ8</id>
        <label>MKL1</label>
    </interactant>
    <organismsDiffer>false</organismsDiffer>
    <experiments>15</experiments>
</comment>
<comment type="interaction">
    <interactant intactId="EBI-466029">
        <id>P42858</id>
    </interactant>
    <interactant intactId="EBI-73837">
        <id>Q9BUB5</id>
        <label>MKNK1</label>
    </interactant>
    <organismsDiffer>false</organismsDiffer>
    <experiments>18</experiments>
</comment>
<comment type="interaction">
    <interactant intactId="EBI-466029">
        <id>P42858</id>
    </interactant>
    <interactant intactId="EBI-2341005">
        <id>Q9H000</id>
        <label>MKRN2</label>
    </interactant>
    <organismsDiffer>false</organismsDiffer>
    <experiments>12</experiments>
</comment>
<comment type="interaction">
    <interactant intactId="EBI-466029">
        <id>P42858</id>
    </interactant>
    <interactant intactId="EBI-2690467">
        <id>P22033</id>
        <label>MMUT</label>
    </interactant>
    <organismsDiffer>false</organismsDiffer>
    <experiments>12</experiments>
</comment>
<comment type="interaction">
    <interactant intactId="EBI-466029">
        <id>P42858</id>
    </interactant>
    <interactant intactId="EBI-716139">
        <id>P51948</id>
        <label>MNAT1</label>
    </interactant>
    <organismsDiffer>false</organismsDiffer>
    <experiments>9</experiments>
</comment>
<comment type="interaction">
    <interactant intactId="EBI-466029">
        <id>P42858</id>
    </interactant>
    <interactant intactId="EBI-2829677">
        <id>P41218</id>
        <label>MNDA</label>
    </interactant>
    <organismsDiffer>false</organismsDiffer>
    <experiments>18</experiments>
</comment>
<comment type="interaction">
    <interactant intactId="EBI-466029">
        <id>P42858</id>
    </interactant>
    <interactant intactId="EBI-24226707">
        <id>Q16653-13</id>
        <label>MOG</label>
    </interactant>
    <organismsDiffer>false</organismsDiffer>
    <experiments>12</experiments>
</comment>
<comment type="interaction">
    <interactant intactId="EBI-466029">
        <id>P42858</id>
    </interactant>
    <interactant intactId="EBI-399257">
        <id>Q15014</id>
        <label>MORF4L2</label>
    </interactant>
    <organismsDiffer>false</organismsDiffer>
    <experiments>12</experiments>
</comment>
<comment type="interaction">
    <interactant intactId="EBI-466029">
        <id>P42858</id>
    </interactant>
    <interactant intactId="EBI-2512452">
        <id>Q8N594</id>
        <label>MPND</label>
    </interactant>
    <organismsDiffer>false</organismsDiffer>
    <experiments>3</experiments>
</comment>
<comment type="interaction">
    <interactant intactId="EBI-466029">
        <id>P42858</id>
    </interactant>
    <interactant intactId="EBI-396513">
        <id>P49959</id>
        <label>MRE11</label>
    </interactant>
    <organismsDiffer>false</organismsDiffer>
    <experiments>5</experiments>
</comment>
<comment type="interaction">
    <interactant intactId="EBI-466029">
        <id>P42858</id>
    </interactant>
    <interactant intactId="EBI-995714">
        <id>Q9Y605</id>
        <label>MRFAP1</label>
    </interactant>
    <organismsDiffer>false</organismsDiffer>
    <experiments>19</experiments>
</comment>
<comment type="interaction">
    <interactant intactId="EBI-466029">
        <id>P42858</id>
    </interactant>
    <interactant intactId="EBI-748896">
        <id>Q96HT8</id>
        <label>MRFAP1L1</label>
    </interactant>
    <organismsDiffer>false</organismsDiffer>
    <experiments>21</experiments>
</comment>
<comment type="interaction">
    <interactant intactId="EBI-466029">
        <id>P42858</id>
    </interactant>
    <interactant intactId="EBI-1054936">
        <id>Q9BYD1</id>
        <label>MRPL13</label>
    </interactant>
    <organismsDiffer>false</organismsDiffer>
    <experiments>3</experiments>
</comment>
<comment type="interaction">
    <interactant intactId="EBI-466029">
        <id>P42858</id>
    </interactant>
    <interactant intactId="EBI-25860238">
        <id>O43196-4</id>
        <label>MSH5</label>
    </interactant>
    <organismsDiffer>false</organismsDiffer>
    <experiments>3</experiments>
</comment>
<comment type="interaction">
    <interactant intactId="EBI-466029">
        <id>P42858</id>
    </interactant>
    <interactant intactId="EBI-9092052">
        <id>Q9Y3D2</id>
        <label>MSRB2</label>
    </interactant>
    <organismsDiffer>false</organismsDiffer>
    <experiments>12</experiments>
</comment>
<comment type="interaction">
    <interactant intactId="EBI-466029">
        <id>P42858</id>
    </interactant>
    <interactant intactId="EBI-6447480">
        <id>P35548</id>
        <label>MSX2</label>
    </interactant>
    <organismsDiffer>false</organismsDiffer>
    <experiments>12</experiments>
</comment>
<comment type="interaction">
    <interactant intactId="EBI-466029">
        <id>P42858</id>
    </interactant>
    <interactant intactId="EBI-996616">
        <id>P02795</id>
        <label>MT2A</label>
    </interactant>
    <organismsDiffer>false</organismsDiffer>
    <experiments>6</experiments>
</comment>
<comment type="interaction">
    <interactant intactId="EBI-466029">
        <id>P42858</id>
    </interactant>
    <interactant intactId="EBI-473954">
        <id>O43312</id>
        <label>MTSS1</label>
    </interactant>
    <organismsDiffer>false</organismsDiffer>
    <experiments>3</experiments>
</comment>
<comment type="interaction">
    <interactant intactId="EBI-466029">
        <id>P42858</id>
    </interactant>
    <interactant intactId="EBI-18051665">
        <id>Q9ULD2-3</id>
        <label>MTUS1</label>
    </interactant>
    <organismsDiffer>false</organismsDiffer>
    <experiments>3</experiments>
</comment>
<comment type="interaction">
    <interactant intactId="EBI-466029">
        <id>P42858</id>
    </interactant>
    <interactant intactId="EBI-25866497">
        <id>Q9ULD2-4</id>
        <label>MTUS1</label>
    </interactant>
    <organismsDiffer>false</organismsDiffer>
    <experiments>9</experiments>
</comment>
<comment type="interaction">
    <interactant intactId="EBI-466029">
        <id>P42858</id>
    </interactant>
    <interactant intactId="EBI-7108375">
        <id>O15069</id>
        <label>NACAD</label>
    </interactant>
    <organismsDiffer>false</organismsDiffer>
    <experiments>15</experiments>
</comment>
<comment type="interaction">
    <interactant intactId="EBI-466029">
        <id>P42858</id>
    </interactant>
    <interactant intactId="EBI-3911716">
        <id>Q9ULW6</id>
        <label>NAP1L2</label>
    </interactant>
    <organismsDiffer>false</organismsDiffer>
    <experiments>3</experiments>
</comment>
<comment type="interaction">
    <interactant intactId="EBI-466029">
        <id>P42858</id>
    </interactant>
    <interactant intactId="EBI-749652">
        <id>P54920</id>
        <label>NAPA</label>
    </interactant>
    <organismsDiffer>false</organismsDiffer>
    <experiments>3</experiments>
</comment>
<comment type="interaction">
    <interactant intactId="EBI-466029">
        <id>P42858</id>
    </interactant>
    <interactant intactId="EBI-742698">
        <id>Q14596</id>
        <label>NBR1</label>
    </interactant>
    <organismsDiffer>false</organismsDiffer>
    <experiments>3</experiments>
</comment>
<comment type="interaction">
    <interactant intactId="EBI-466029">
        <id>P42858</id>
    </interactant>
    <interactant intactId="EBI-395044">
        <id>P14598</id>
        <label>NCF1</label>
    </interactant>
    <organismsDiffer>false</organismsDiffer>
    <experiments>6</experiments>
</comment>
<comment type="interaction">
    <interactant intactId="EBI-466029">
        <id>P42858</id>
    </interactant>
    <interactant intactId="EBI-1056979">
        <id>Q969V3</id>
        <label>NCLN</label>
    </interactant>
    <organismsDiffer>false</organismsDiffer>
    <experiments>9</experiments>
</comment>
<comment type="interaction">
    <interactant intactId="EBI-466029">
        <id>P42858</id>
    </interactant>
    <interactant intactId="EBI-347233">
        <id>O75376</id>
        <label>NCOR1</label>
    </interactant>
    <organismsDiffer>false</organismsDiffer>
    <experiments>3</experiments>
</comment>
<comment type="interaction">
    <interactant intactId="EBI-466029">
        <id>P42858</id>
    </interactant>
    <interactant intactId="EBI-718177">
        <id>Q99608</id>
        <label>NDN</label>
    </interactant>
    <organismsDiffer>false</organismsDiffer>
    <experiments>6</experiments>
</comment>
<comment type="interaction">
    <interactant intactId="EBI-466029">
        <id>P42858</id>
    </interactant>
    <interactant intactId="EBI-372742">
        <id>Q9P0J0</id>
        <label>NDUFA13</label>
    </interactant>
    <organismsDiffer>false</organismsDiffer>
    <experiments>4</experiments>
</comment>
<comment type="interaction">
    <interactant intactId="EBI-466029">
        <id>P42858</id>
    </interactant>
    <interactant intactId="EBI-1045087">
        <id>Q16795</id>
        <label>NDUFA9</label>
    </interactant>
    <organismsDiffer>false</organismsDiffer>
    <experiments>7</experiments>
</comment>
<comment type="interaction">
    <interactant intactId="EBI-466029">
        <id>P42858</id>
    </interactant>
    <interactant intactId="EBI-1246371">
        <id>O96000</id>
        <label>NDUFB10</label>
    </interactant>
    <organismsDiffer>false</organismsDiffer>
    <experiments>13</experiments>
</comment>
<comment type="interaction">
    <interactant intactId="EBI-466029">
        <id>P42858</id>
    </interactant>
    <interactant intactId="EBI-25930682">
        <id>O96000-2</id>
        <label>NDUFB10</label>
    </interactant>
    <organismsDiffer>false</organismsDiffer>
    <experiments>3</experiments>
</comment>
<comment type="interaction">
    <interactant intactId="EBI-466029">
        <id>P42858</id>
    </interactant>
    <interactant intactId="EBI-713654">
        <id>Q9Y6M9</id>
        <label>NDUFB9</label>
    </interactant>
    <organismsDiffer>false</organismsDiffer>
    <experiments>10</experiments>
</comment>
<comment type="interaction">
    <interactant intactId="EBI-466029">
        <id>P42858</id>
    </interactant>
    <interactant intactId="EBI-25876328">
        <id>P28331-5</id>
        <label>NDUFS1</label>
    </interactant>
    <organismsDiffer>false</organismsDiffer>
    <experiments>6</experiments>
</comment>
<comment type="interaction">
    <interactant intactId="EBI-466029">
        <id>P42858</id>
    </interactant>
    <interactant intactId="EBI-1246091">
        <id>O43920</id>
        <label>NDUFS5</label>
    </interactant>
    <organismsDiffer>false</organismsDiffer>
    <experiments>7</experiments>
</comment>
<comment type="interaction">
    <interactant intactId="EBI-466029">
        <id>P42858</id>
    </interactant>
    <interactant intactId="EBI-2880203">
        <id>O76041</id>
        <label>NEBL</label>
    </interactant>
    <organismsDiffer>false</organismsDiffer>
    <experiments>18</experiments>
</comment>
<comment type="interaction">
    <interactant intactId="EBI-466029">
        <id>P42858</id>
    </interactant>
    <interactant intactId="EBI-10178578">
        <id>I6L9F6</id>
        <label>NEFL</label>
    </interactant>
    <organismsDiffer>false</organismsDiffer>
    <experiments>9</experiments>
</comment>
<comment type="interaction">
    <interactant intactId="EBI-466029">
        <id>P42858</id>
    </interactant>
    <interactant intactId="EBI-1752987">
        <id>Q86SG6</id>
        <label>NEK8</label>
    </interactant>
    <organismsDiffer>false</organismsDiffer>
    <experiments>3</experiments>
</comment>
<comment type="interaction">
    <interactant intactId="EBI-466029">
        <id>P42858</id>
    </interactant>
    <interactant intactId="EBI-3908303">
        <id>Q13562</id>
        <label>NEUROD1</label>
    </interactant>
    <organismsDiffer>false</organismsDiffer>
    <experiments>6</experiments>
</comment>
<comment type="interaction">
    <interactant intactId="EBI-466029">
        <id>P42858</id>
    </interactant>
    <interactant intactId="EBI-1452242">
        <id>P19838-2</id>
        <label>NFKB1</label>
    </interactant>
    <organismsDiffer>false</organismsDiffer>
    <experiments>3</experiments>
</comment>
<comment type="interaction">
    <interactant intactId="EBI-466029">
        <id>P42858</id>
    </interactant>
    <interactant intactId="EBI-718372">
        <id>Q8N5V2</id>
        <label>NGEF</label>
    </interactant>
    <organismsDiffer>false</organismsDiffer>
    <experiments>3</experiments>
</comment>
<comment type="interaction">
    <interactant intactId="EBI-466029">
        <id>P42858</id>
    </interactant>
    <interactant intactId="EBI-1050064">
        <id>Q9NX24</id>
        <label>NHP2</label>
    </interactant>
    <organismsDiffer>false</organismsDiffer>
    <experiments>3</experiments>
</comment>
<comment type="interaction">
    <interactant intactId="EBI-466029">
        <id>P42858</id>
    </interactant>
    <interactant intactId="EBI-366978">
        <id>Q9UBE8</id>
        <label>NLK</label>
    </interactant>
    <organismsDiffer>false</organismsDiffer>
    <experiments>3</experiments>
</comment>
<comment type="interaction">
    <interactant intactId="EBI-466029">
        <id>P42858</id>
    </interactant>
    <interactant intactId="EBI-25860999">
        <id>Q96AM0</id>
        <label>NLRP1</label>
    </interactant>
    <organismsDiffer>false</organismsDiffer>
    <experiments>3</experiments>
</comment>
<comment type="interaction">
    <interactant intactId="EBI-466029">
        <id>P42858</id>
    </interactant>
    <interactant intactId="EBI-744871">
        <id>O00746</id>
        <label>NME4</label>
    </interactant>
    <organismsDiffer>false</organismsDiffer>
    <experiments>20</experiments>
</comment>
<comment type="interaction">
    <interactant intactId="EBI-466029">
        <id>P42858</id>
    </interactant>
    <interactant intactId="EBI-740667">
        <id>P56597</id>
        <label>NME5</label>
    </interactant>
    <organismsDiffer>false</organismsDiffer>
    <experiments>6</experiments>
</comment>
<comment type="interaction">
    <interactant intactId="EBI-466029">
        <id>P42858</id>
    </interactant>
    <interactant intactId="EBI-3905285">
        <id>Q9C002</id>
        <label>NMES1</label>
    </interactant>
    <organismsDiffer>false</organismsDiffer>
    <experiments>3</experiments>
</comment>
<comment type="interaction">
    <interactant intactId="EBI-466029">
        <id>P42858</id>
    </interactant>
    <interactant intactId="EBI-1051262">
        <id>Q9Y239</id>
        <label>NOD1</label>
    </interactant>
    <organismsDiffer>false</organismsDiffer>
    <experiments>9</experiments>
</comment>
<comment type="interaction">
    <interactant intactId="EBI-466029">
        <id>P42858</id>
    </interactant>
    <interactant intactId="EBI-25840002">
        <id>O15130-2</id>
        <label>NPFF</label>
    </interactant>
    <organismsDiffer>false</organismsDiffer>
    <experiments>18</experiments>
</comment>
<comment type="interaction">
    <interactant intactId="EBI-466029">
        <id>P42858</id>
    </interactant>
    <interactant intactId="EBI-12839590">
        <id>Q9Y639-1</id>
        <label>NPTN</label>
    </interactant>
    <organismsDiffer>false</organismsDiffer>
    <experiments>6</experiments>
</comment>
<comment type="interaction">
    <interactant intactId="EBI-466029">
        <id>P42858</id>
    </interactant>
    <interactant intactId="EBI-12699353">
        <id>Q13133-2</id>
        <label>NR1H3</label>
    </interactant>
    <organismsDiffer>false</organismsDiffer>
    <experiments>3</experiments>
</comment>
<comment type="interaction">
    <interactant intactId="EBI-466029">
        <id>P42858</id>
    </interactant>
    <interactant intactId="EBI-10260040">
        <id>Q86WQ0</id>
        <label>NR2C2AP</label>
    </interactant>
    <organismsDiffer>false</organismsDiffer>
    <experiments>3</experiments>
</comment>
<comment type="interaction">
    <interactant intactId="EBI-466029">
        <id>P42858</id>
    </interactant>
    <interactant intactId="EBI-25842707">
        <id>Q6X4W1-6</id>
        <label>NSMF</label>
    </interactant>
    <organismsDiffer>false</organismsDiffer>
    <experiments>6</experiments>
</comment>
<comment type="interaction">
    <interactant intactId="EBI-466029">
        <id>P42858</id>
    </interactant>
    <interactant intactId="EBI-25834643">
        <id>P36639-4</id>
        <label>NUDT1</label>
    </interactant>
    <organismsDiffer>false</organismsDiffer>
    <experiments>6</experiments>
</comment>
<comment type="interaction">
    <interactant intactId="EBI-466029">
        <id>P42858</id>
    </interactant>
    <interactant intactId="EBI-4280066">
        <id>Q9NZJ9</id>
        <label>NUDT4</label>
    </interactant>
    <organismsDiffer>false</organismsDiffer>
    <experiments>6</experiments>
</comment>
<comment type="interaction">
    <interactant intactId="EBI-466029">
        <id>P42858</id>
    </interactant>
    <interactant intactId="EBI-1210753">
        <id>Q7Z417</id>
        <label>NUFIP2</label>
    </interactant>
    <organismsDiffer>false</organismsDiffer>
    <experiments>6</experiments>
</comment>
<comment type="interaction">
    <interactant intactId="EBI-466029">
        <id>P42858</id>
    </interactant>
    <interactant intactId="EBI-2811583">
        <id>Q9BVL2</id>
        <label>NUP58</label>
    </interactant>
    <organismsDiffer>false</organismsDiffer>
    <experiments>7</experiments>
</comment>
<comment type="interaction">
    <interactant intactId="EBI-466029">
        <id>P42858</id>
    </interactant>
    <interactant intactId="EBI-10698339">
        <id>Q9NPJ8-3</id>
        <label>NXT2</label>
    </interactant>
    <organismsDiffer>false</organismsDiffer>
    <experiments>15</experiments>
</comment>
<comment type="interaction">
    <interactant intactId="EBI-466029">
        <id>P42858</id>
    </interactant>
    <interactant intactId="EBI-12176953">
        <id>Q96GC1</id>
        <label>ODF2L</label>
    </interactant>
    <organismsDiffer>false</organismsDiffer>
    <experiments>3</experiments>
</comment>
<comment type="interaction">
    <interactant intactId="EBI-466029">
        <id>P42858</id>
    </interactant>
    <interactant intactId="EBI-747213">
        <id>Q02218</id>
        <label>OGDH</label>
    </interactant>
    <organismsDiffer>false</organismsDiffer>
    <experiments>3</experiments>
</comment>
<comment type="interaction">
    <interactant intactId="EBI-466029">
        <id>P42858</id>
    </interactant>
    <interactant intactId="EBI-25888682">
        <id>Q86WS3</id>
        <label>OOSP2</label>
    </interactant>
    <organismsDiffer>false</organismsDiffer>
    <experiments>9</experiments>
</comment>
<comment type="interaction">
    <interactant intactId="EBI-466029">
        <id>P42858</id>
    </interactant>
    <interactant intactId="EBI-25954356">
        <id>Q6B0I4</id>
        <label>OPCML</label>
    </interactant>
    <organismsDiffer>false</organismsDiffer>
    <experiments>3</experiments>
</comment>
<comment type="interaction">
    <interactant intactId="EBI-466029">
        <id>P42858</id>
    </interactant>
    <interactant intactId="EBI-748974">
        <id>Q96CV9</id>
        <label>OPTN</label>
    </interactant>
    <organismsDiffer>false</organismsDiffer>
    <experiments>13</experiments>
</comment>
<comment type="interaction">
    <interactant intactId="EBI-466029">
        <id>P42858</id>
    </interactant>
    <interactant intactId="EBI-9091423">
        <id>Q96CV9-2</id>
        <label>OPTN</label>
    </interactant>
    <organismsDiffer>false</organismsDiffer>
    <experiments>18</experiments>
</comment>
<comment type="interaction">
    <interactant intactId="EBI-466029">
        <id>P42858</id>
    </interactant>
    <interactant intactId="EBI-1051152">
        <id>Q92882</id>
        <label>OSTF1</label>
    </interactant>
    <organismsDiffer>false</organismsDiffer>
    <experiments>5</experiments>
</comment>
<comment type="interaction">
    <interactant intactId="EBI-466029">
        <id>P42858</id>
    </interactant>
    <interactant intactId="EBI-25954043">
        <id>Q3ZCN5</id>
        <label>OTOGL</label>
    </interactant>
    <organismsDiffer>false</organismsDiffer>
    <experiments>3</experiments>
</comment>
<comment type="interaction">
    <interactant intactId="EBI-466029">
        <id>P42858</id>
    </interactant>
    <interactant intactId="EBI-12149899">
        <id>Q8IVL6-2</id>
        <label>P3H3</label>
    </interactant>
    <organismsDiffer>false</organismsDiffer>
    <experiments>6</experiments>
</comment>
<comment type="interaction">
    <interactant intactId="EBI-466029">
        <id>P42858</id>
    </interactant>
    <interactant intactId="EBI-1237386">
        <id>P13674</id>
        <label>P4HA1</label>
    </interactant>
    <organismsDiffer>false</organismsDiffer>
    <experiments>5</experiments>
</comment>
<comment type="interaction">
    <interactant intactId="EBI-466029">
        <id>P42858</id>
    </interactant>
    <interactant intactId="EBI-2555014">
        <id>Q6VY07</id>
        <label>PACS1</label>
    </interactant>
    <organismsDiffer>false</organismsDiffer>
    <experiments>18</experiments>
</comment>
<comment type="interaction">
    <interactant intactId="EBI-466029">
        <id>P42858</id>
    </interactant>
    <interactant intactId="EBI-721769">
        <id>Q9BY11</id>
        <label>PACSIN1</label>
    </interactant>
    <organismsDiffer>false</organismsDiffer>
    <experiments>3</experiments>
</comment>
<comment type="interaction">
    <interactant intactId="EBI-466029">
        <id>P42858</id>
    </interactant>
    <interactant intactId="EBI-1045887">
        <id>Q13177</id>
        <label>PAK2</label>
    </interactant>
    <organismsDiffer>false</organismsDiffer>
    <experiments>2</experiments>
</comment>
<comment type="interaction">
    <interactant intactId="EBI-466029">
        <id>P42858</id>
    </interactant>
    <interactant intactId="EBI-741896">
        <id>Q9P286</id>
        <label>PAK5</label>
    </interactant>
    <organismsDiffer>false</organismsDiffer>
    <experiments>3</experiments>
</comment>
<comment type="interaction">
    <interactant intactId="EBI-466029">
        <id>P42858</id>
    </interactant>
    <interactant intactId="EBI-2811699">
        <id>Q9NP74</id>
        <label>PALMD</label>
    </interactant>
    <organismsDiffer>false</organismsDiffer>
    <experiments>6</experiments>
</comment>
<comment type="interaction">
    <interactant intactId="EBI-466029">
        <id>P42858</id>
    </interactant>
    <interactant intactId="EBI-2513978">
        <id>Q8N3R9</id>
        <label>PALS1</label>
    </interactant>
    <organismsDiffer>false</organismsDiffer>
    <experiments>3</experiments>
</comment>
<comment type="interaction">
    <interactant intactId="EBI-466029">
        <id>P42858</id>
    </interactant>
    <interactant intactId="EBI-10694587">
        <id>Q86WK9</id>
        <label>PAQR7</label>
    </interactant>
    <organismsDiffer>false</organismsDiffer>
    <experiments>3</experiments>
</comment>
<comment type="interaction">
    <interactant intactId="EBI-466029">
        <id>P42858</id>
    </interactant>
    <interactant intactId="EBI-1164361">
        <id>Q99497</id>
        <label>PARK7</label>
    </interactant>
    <organismsDiffer>false</organismsDiffer>
    <experiments>6</experiments>
</comment>
<comment type="interaction">
    <interactant intactId="EBI-466029">
        <id>P42858</id>
    </interactant>
    <interactant intactId="EBI-11022007">
        <id>Q9HBE1-4</id>
        <label>PATZ1</label>
    </interactant>
    <organismsDiffer>false</organismsDiffer>
    <experiments>3</experiments>
</comment>
<comment type="interaction">
    <interactant intactId="EBI-466029">
        <id>P42858</id>
    </interactant>
    <interactant intactId="EBI-10302990">
        <id>Q9BYU1</id>
        <label>PBX4</label>
    </interactant>
    <organismsDiffer>false</organismsDiffer>
    <experiments>3</experiments>
</comment>
<comment type="interaction">
    <interactant intactId="EBI-466029">
        <id>P42858</id>
    </interactant>
    <interactant intactId="EBI-21584477">
        <id>Q9Y5G3-2</id>
        <label>PCDHGB1</label>
    </interactant>
    <organismsDiffer>false</organismsDiffer>
    <experiments>3</experiments>
</comment>
<comment type="interaction">
    <interactant intactId="EBI-466029">
        <id>P42858</id>
    </interactant>
    <interactant intactId="EBI-25960845">
        <id>Q6UW60-2</id>
        <label>PCSK4</label>
    </interactant>
    <organismsDiffer>false</organismsDiffer>
    <experiments>3</experiments>
</comment>
<comment type="interaction">
    <interactant intactId="EBI-466029">
        <id>P42858</id>
    </interactant>
    <interactant intactId="EBI-25952361">
        <id>P54750-4</id>
        <label>PDE1A</label>
    </interactant>
    <organismsDiffer>false</organismsDiffer>
    <experiments>3</experiments>
</comment>
<comment type="interaction">
    <interactant intactId="EBI-466029">
        <id>P42858</id>
    </interactant>
    <interactant intactId="EBI-726271">
        <id>Q15119</id>
        <label>PDK2</label>
    </interactant>
    <organismsDiffer>false</organismsDiffer>
    <experiments>10</experiments>
</comment>
<comment type="interaction">
    <interactant intactId="EBI-466029">
        <id>P42858</id>
    </interactant>
    <interactant intactId="EBI-751267">
        <id>Q96HC4</id>
        <label>PDLIM5</label>
    </interactant>
    <organismsDiffer>false</organismsDiffer>
    <experiments>9</experiments>
</comment>
<comment type="interaction">
    <interactant intactId="EBI-466029">
        <id>P42858</id>
    </interactant>
    <interactant intactId="EBI-9087775">
        <id>O15530-4</id>
        <label>PDPK1</label>
    </interactant>
    <organismsDiffer>false</organismsDiffer>
    <experiments>6</experiments>
</comment>
<comment type="interaction">
    <interactant intactId="EBI-466029">
        <id>P42858</id>
    </interactant>
    <interactant intactId="EBI-716063">
        <id>Q13113</id>
        <label>PDZK1IP1</label>
    </interactant>
    <organismsDiffer>false</organismsDiffer>
    <experiments>21</experiments>
</comment>
<comment type="interaction">
    <interactant intactId="EBI-466029">
        <id>P42858</id>
    </interactant>
    <interactant intactId="EBI-448369">
        <id>Q96FA3</id>
        <label>PELI1</label>
    </interactant>
    <organismsDiffer>false</organismsDiffer>
    <experiments>3</experiments>
</comment>
<comment type="interaction">
    <interactant intactId="EBI-466029">
        <id>P42858</id>
    </interactant>
    <interactant intactId="EBI-1043580">
        <id>Q9BRX2</id>
        <label>PELO</label>
    </interactant>
    <organismsDiffer>false</organismsDiffer>
    <experiments>12</experiments>
</comment>
<comment type="interaction">
    <interactant intactId="EBI-466029">
        <id>P42858</id>
    </interactant>
    <interactant intactId="EBI-1053271">
        <id>O00541</id>
        <label>PES1</label>
    </interactant>
    <organismsDiffer>false</organismsDiffer>
    <experiments>3</experiments>
</comment>
<comment type="interaction">
    <interactant intactId="EBI-466029">
        <id>P42858</id>
    </interactant>
    <interactant intactId="EBI-357275">
        <id>Q99471</id>
        <label>PFDN5</label>
    </interactant>
    <organismsDiffer>false</organismsDiffer>
    <experiments>3</experiments>
</comment>
<comment type="interaction">
    <interactant intactId="EBI-466029">
        <id>P42858</id>
    </interactant>
    <interactant intactId="EBI-473138">
        <id>P35080</id>
        <label>PFN2</label>
    </interactant>
    <organismsDiffer>false</organismsDiffer>
    <experiments>7</experiments>
</comment>
<comment type="interaction">
    <interactant intactId="EBI-466029">
        <id>P42858</id>
    </interactant>
    <interactant intactId="EBI-629434">
        <id>O75925</id>
        <label>PIAS1</label>
    </interactant>
    <organismsDiffer>false</organismsDiffer>
    <experiments>19</experiments>
</comment>
<comment type="interaction">
    <interactant intactId="EBI-466029">
        <id>P42858</id>
    </interactant>
    <interactant intactId="EBI-473160">
        <id>Q8N2W9</id>
        <label>PIAS4</label>
    </interactant>
    <organismsDiffer>false</organismsDiffer>
    <experiments>6</experiments>
</comment>
<comment type="interaction">
    <interactant intactId="EBI-466029">
        <id>P42858</id>
    </interactant>
    <interactant intactId="EBI-2558770">
        <id>Q8WXW3</id>
        <label>PIBF1</label>
    </interactant>
    <organismsDiffer>false</organismsDiffer>
    <experiments>3</experiments>
</comment>
<comment type="interaction">
    <interactant intactId="EBI-466029">
        <id>P42858</id>
    </interactant>
    <interactant intactId="EBI-79165">
        <id>Q9NRD5</id>
        <label>PICK1</label>
    </interactant>
    <organismsDiffer>false</organismsDiffer>
    <experiments>3</experiments>
</comment>
<comment type="interaction">
    <interactant intactId="EBI-466029">
        <id>P42858</id>
    </interactant>
    <interactant intactId="EBI-10232538">
        <id>Q8WWB5</id>
        <label>PIH1D2</label>
    </interactant>
    <organismsDiffer>false</organismsDiffer>
    <experiments>3</experiments>
</comment>
<comment type="interaction">
    <interactant intactId="EBI-466029">
        <id>P42858</id>
    </interactant>
    <interactant intactId="EBI-2116585">
        <id>P42336</id>
        <label>PIK3CA</label>
    </interactant>
    <organismsDiffer>false</organismsDiffer>
    <experiments>3</experiments>
</comment>
<comment type="interaction">
    <interactant intactId="EBI-466029">
        <id>P42858</id>
    </interactant>
    <interactant intactId="EBI-79464">
        <id>P27986</id>
        <label>PIK3R1</label>
    </interactant>
    <organismsDiffer>false</organismsDiffer>
    <experiments>7</experiments>
</comment>
<comment type="interaction">
    <interactant intactId="EBI-466029">
        <id>P42858</id>
    </interactant>
    <interactant intactId="EBI-9090282">
        <id>P27986-2</id>
        <label>PIK3R1</label>
    </interactant>
    <organismsDiffer>false</organismsDiffer>
    <experiments>18</experiments>
</comment>
<comment type="interaction">
    <interactant intactId="EBI-466029">
        <id>P42858</id>
    </interactant>
    <interactant intactId="EBI-346930">
        <id>O00459</id>
        <label>PIK3R2</label>
    </interactant>
    <organismsDiffer>false</organismsDiffer>
    <experiments>6</experiments>
</comment>
<comment type="interaction">
    <interactant intactId="EBI-466029">
        <id>P42858</id>
    </interactant>
    <interactant intactId="EBI-79893">
        <id>Q92569</id>
        <label>PIK3R3</label>
    </interactant>
    <organismsDiffer>false</organismsDiffer>
    <experiments>18</experiments>
</comment>
<comment type="interaction">
    <interactant intactId="EBI-466029">
        <id>P42858</id>
    </interactant>
    <interactant intactId="EBI-2846068">
        <id>Q9BXM7</id>
        <label>PINK1</label>
    </interactant>
    <organismsDiffer>false</organismsDiffer>
    <experiments>9</experiments>
</comment>
<comment type="interaction">
    <interactant intactId="EBI-466029">
        <id>P42858</id>
    </interactant>
    <interactant intactId="EBI-527417">
        <id>Q96J94</id>
        <label>PIWIL1</label>
    </interactant>
    <organismsDiffer>false</organismsDiffer>
    <experiments>3</experiments>
</comment>
<comment type="interaction">
    <interactant intactId="EBI-466029">
        <id>P42858</id>
    </interactant>
    <interactant intactId="EBI-353408">
        <id>P14618</id>
        <label>PKM</label>
    </interactant>
    <organismsDiffer>false</organismsDiffer>
    <experiments>9</experiments>
</comment>
<comment type="interaction">
    <interactant intactId="EBI-466029">
        <id>P42858</id>
    </interactant>
    <interactant intactId="EBI-25961917">
        <id>Q9BS22</id>
        <label>PLA2G1B</label>
    </interactant>
    <organismsDiffer>false</organismsDiffer>
    <experiments>3</experiments>
</comment>
<comment type="interaction">
    <interactant intactId="EBI-466029">
        <id>P42858</id>
    </interactant>
    <interactant intactId="EBI-25848809">
        <id>Q9UP65</id>
        <label>PLA2G4C</label>
    </interactant>
    <organismsDiffer>false</organismsDiffer>
    <experiments>12</experiments>
</comment>
<comment type="interaction">
    <interactant intactId="EBI-466029">
        <id>P42858</id>
    </interactant>
    <interactant intactId="EBI-297903">
        <id>Q15149</id>
        <label>PLEC</label>
    </interactant>
    <organismsDiffer>false</organismsDiffer>
    <experiments>4</experiments>
</comment>
<comment type="interaction">
    <interactant intactId="EBI-466029">
        <id>P42858</id>
    </interactant>
    <interactant intactId="EBI-12891828">
        <id>Q6ZR37</id>
        <label>PLEKHG7</label>
    </interactant>
    <organismsDiffer>false</organismsDiffer>
    <experiments>12</experiments>
</comment>
<comment type="interaction">
    <interactant intactId="EBI-466029">
        <id>P42858</id>
    </interactant>
    <interactant intactId="EBI-25962330">
        <id>Q9HCM2-3</id>
        <label>PLXNA4</label>
    </interactant>
    <organismsDiffer>false</organismsDiffer>
    <experiments>3</experiments>
</comment>
<comment type="interaction">
    <interactant intactId="EBI-466029">
        <id>P42858</id>
    </interactant>
    <interactant intactId="EBI-12906008">
        <id>Q6P1K2-3</id>
        <label>PMF1</label>
    </interactant>
    <organismsDiffer>false</organismsDiffer>
    <experiments>3</experiments>
</comment>
<comment type="interaction">
    <interactant intactId="EBI-466029">
        <id>P42858</id>
    </interactant>
    <interactant intactId="EBI-2557132">
        <id>Q8NBT0</id>
        <label>POC1A</label>
    </interactant>
    <organismsDiffer>false</organismsDiffer>
    <experiments>15</experiments>
</comment>
<comment type="interaction">
    <interactant intactId="EBI-466029">
        <id>P42858</id>
    </interactant>
    <interactant intactId="EBI-25972548">
        <id>Q9H2U2-3</id>
        <label>PPA2</label>
    </interactant>
    <organismsDiffer>false</organismsDiffer>
    <experiments>3</experiments>
</comment>
<comment type="interaction">
    <interactant intactId="EBI-466029">
        <id>P42858</id>
    </interactant>
    <interactant intactId="EBI-25972564">
        <id>Q9H2U2-6</id>
        <label>PPA2</label>
    </interactant>
    <organismsDiffer>false</organismsDiffer>
    <experiments>3</experiments>
</comment>
<comment type="interaction">
    <interactant intactId="EBI-466029">
        <id>P42858</id>
    </interactant>
    <interactant intactId="EBI-78615">
        <id>Q07869</id>
        <label>PPARA</label>
    </interactant>
    <organismsDiffer>false</organismsDiffer>
    <experiments>3</experiments>
</comment>
<comment type="interaction">
    <interactant intactId="EBI-466029">
        <id>P42858</id>
    </interactant>
    <interactant intactId="EBI-10223258">
        <id>Q03181-2</id>
        <label>PPARD</label>
    </interactant>
    <organismsDiffer>false</organismsDiffer>
    <experiments>3</experiments>
</comment>
<comment type="interaction">
    <interactant intactId="EBI-466029">
        <id>P42858</id>
    </interactant>
    <interactant intactId="EBI-781384">
        <id>P37231</id>
        <label>PPARG</label>
    </interactant>
    <organismsDiffer>false</organismsDiffer>
    <experiments>16</experiments>
</comment>
<comment type="interaction">
    <interactant intactId="EBI-466029">
        <id>P42858</id>
    </interactant>
    <interactant intactId="EBI-14210385">
        <id>Q59EV6</id>
        <label>PPGB</label>
    </interactant>
    <organismsDiffer>false</organismsDiffer>
    <experiments>10</experiments>
</comment>
<comment type="interaction">
    <interactant intactId="EBI-466029">
        <id>P42858</id>
    </interactant>
    <interactant intactId="EBI-1055615">
        <id>O43447</id>
        <label>PPIH</label>
    </interactant>
    <organismsDiffer>false</organismsDiffer>
    <experiments>10</experiments>
</comment>
<comment type="interaction">
    <interactant intactId="EBI-466029">
        <id>P42858</id>
    </interactant>
    <interactant intactId="EBI-368321">
        <id>O60437</id>
        <label>PPL</label>
    </interactant>
    <organismsDiffer>false</organismsDiffer>
    <experiments>8</experiments>
</comment>
<comment type="interaction">
    <interactant intactId="EBI-466029">
        <id>P42858</id>
    </interactant>
    <interactant intactId="EBI-357253">
        <id>P62136</id>
        <label>PPP1CA</label>
    </interactant>
    <organismsDiffer>false</organismsDiffer>
    <experiments>10</experiments>
</comment>
<comment type="interaction">
    <interactant intactId="EBI-466029">
        <id>P42858</id>
    </interactant>
    <interactant intactId="EBI-10293968">
        <id>Q96T49</id>
        <label>PPP1R16B</label>
    </interactant>
    <organismsDiffer>false</organismsDiffer>
    <experiments>3</experiments>
</comment>
<comment type="interaction">
    <interactant intactId="EBI-466029">
        <id>P42858</id>
    </interactant>
    <interactant intactId="EBI-25835994">
        <id>Q6ZMI0-5</id>
        <label>PPP1R21</label>
    </interactant>
    <organismsDiffer>false</organismsDiffer>
    <experiments>9</experiments>
</comment>
<comment type="interaction">
    <interactant intactId="EBI-466029">
        <id>P42858</id>
    </interactant>
    <interactant intactId="EBI-968374">
        <id>Q16537</id>
        <label>PPP2R5E</label>
    </interactant>
    <organismsDiffer>false</organismsDiffer>
    <experiments>15</experiments>
</comment>
<comment type="interaction">
    <interactant intactId="EBI-466029">
        <id>P42858</id>
    </interactant>
    <interactant intactId="EBI-11079164">
        <id>O75170-4</id>
        <label>PPP6R2</label>
    </interactant>
    <organismsDiffer>false</organismsDiffer>
    <experiments>3</experiments>
</comment>
<comment type="interaction">
    <interactant intactId="EBI-466029">
        <id>P42858</id>
    </interactant>
    <interactant intactId="EBI-713867">
        <id>O60828</id>
        <label>PQBP1</label>
    </interactant>
    <organismsDiffer>false</organismsDiffer>
    <experiments>3</experiments>
</comment>
<comment type="interaction">
    <interactant intactId="EBI-466029">
        <id>P42858</id>
    </interactant>
    <interactant intactId="EBI-726050">
        <id>P49642</id>
        <label>PRIM1</label>
    </interactant>
    <organismsDiffer>false</organismsDiffer>
    <experiments>3</experiments>
</comment>
<comment type="interaction">
    <interactant intactId="EBI-466029">
        <id>P42858</id>
    </interactant>
    <interactant intactId="EBI-476586">
        <id>P17612</id>
        <label>PRKACA</label>
    </interactant>
    <organismsDiffer>false</organismsDiffer>
    <experiments>3</experiments>
</comment>
<comment type="interaction">
    <interactant intactId="EBI-466029">
        <id>P42858</id>
    </interactant>
    <interactant intactId="EBI-78458">
        <id>P55345</id>
        <label>PRMT2</label>
    </interactant>
    <organismsDiffer>false</organismsDiffer>
    <experiments>5</experiments>
</comment>
<comment type="interaction">
    <interactant intactId="EBI-466029">
        <id>P42858</id>
    </interactant>
    <interactant intactId="EBI-977302">
        <id>P04156</id>
        <label>PRNP</label>
    </interactant>
    <organismsDiffer>false</organismsDiffer>
    <experiments>13</experiments>
</comment>
<comment type="interaction">
    <interactant intactId="EBI-466029">
        <id>P42858</id>
    </interactant>
    <interactant intactId="EBI-25960611">
        <id>Q53TL4</id>
        <label>PRO0132</label>
    </interactant>
    <organismsDiffer>false</organismsDiffer>
    <experiments>3</experiments>
</comment>
<comment type="interaction">
    <interactant intactId="EBI-466029">
        <id>P42858</id>
    </interactant>
    <interactant intactId="EBI-1567797">
        <id>Q8WWY3</id>
        <label>PRPF31</label>
    </interactant>
    <organismsDiffer>false</organismsDiffer>
    <experiments>3</experiments>
</comment>
<comment type="interaction">
    <interactant intactId="EBI-466029">
        <id>P42858</id>
    </interactant>
    <interactant intactId="EBI-473291">
        <id>O75400</id>
        <label>PRPF40A</label>
    </interactant>
    <organismsDiffer>false</organismsDiffer>
    <experiments>15</experiments>
</comment>
<comment type="interaction">
    <interactant intactId="EBI-466029">
        <id>P42858</id>
    </interactant>
    <interactant intactId="EBI-5280197">
        <id>O75400-2</id>
        <label>PRPF40A</label>
    </interactant>
    <organismsDiffer>false</organismsDiffer>
    <experiments>9</experiments>
</comment>
<comment type="interaction">
    <interactant intactId="EBI-466029">
        <id>P42858</id>
    </interactant>
    <interactant intactId="EBI-2560879">
        <id>Q96M27</id>
        <label>PRRC1</label>
    </interactant>
    <organismsDiffer>false</organismsDiffer>
    <experiments>7</experiments>
</comment>
<comment type="interaction">
    <interactant intactId="EBI-466029">
        <id>P42858</id>
    </interactant>
    <interactant intactId="EBI-743880">
        <id>Q8WUY3</id>
        <label>PRUNE2</label>
    </interactant>
    <organismsDiffer>false</organismsDiffer>
    <experiments>3</experiments>
</comment>
<comment type="interaction">
    <interactant intactId="EBI-466029">
        <id>P42858</id>
    </interactant>
    <interactant intactId="EBI-359352">
        <id>P25786</id>
        <label>PSMA1</label>
    </interactant>
    <organismsDiffer>false</organismsDiffer>
    <experiments>3</experiments>
</comment>
<comment type="interaction">
    <interactant intactId="EBI-466029">
        <id>P42858</id>
    </interactant>
    <interactant intactId="EBI-359310">
        <id>P25789</id>
        <label>PSMA4</label>
    </interactant>
    <organismsDiffer>false</organismsDiffer>
    <experiments>4</experiments>
</comment>
<comment type="interaction">
    <interactant intactId="EBI-466029">
        <id>P42858</id>
    </interactant>
    <interactant intactId="EBI-357793">
        <id>P60900</id>
        <label>PSMA6</label>
    </interactant>
    <organismsDiffer>false</organismsDiffer>
    <experiments>4</experiments>
</comment>
<comment type="interaction">
    <interactant intactId="EBI-466029">
        <id>P42858</id>
    </interactant>
    <interactant intactId="EBI-603272">
        <id>O14818</id>
        <label>PSMA7</label>
    </interactant>
    <organismsDiffer>false</organismsDiffer>
    <experiments>13</experiments>
</comment>
<comment type="interaction">
    <interactant intactId="EBI-466029">
        <id>P42858</id>
    </interactant>
    <interactant intactId="EBI-372273">
        <id>P20618</id>
        <label>PSMB1</label>
    </interactant>
    <organismsDiffer>false</organismsDiffer>
    <experiments>7</experiments>
</comment>
<comment type="interaction">
    <interactant intactId="EBI-466029">
        <id>P42858</id>
    </interactant>
    <interactant intactId="EBI-359335">
        <id>P49721</id>
        <label>PSMB2</label>
    </interactant>
    <organismsDiffer>false</organismsDiffer>
    <experiments>7</experiments>
</comment>
<comment type="interaction">
    <interactant intactId="EBI-466029">
        <id>P42858</id>
    </interactant>
    <interactant intactId="EBI-603340">
        <id>P49720</id>
        <label>PSMB3</label>
    </interactant>
    <organismsDiffer>false</organismsDiffer>
    <experiments>3</experiments>
</comment>
<comment type="interaction">
    <interactant intactId="EBI-466029">
        <id>P42858</id>
    </interactant>
    <interactant intactId="EBI-359288">
        <id>P28072</id>
        <label>PSMB6</label>
    </interactant>
    <organismsDiffer>false</organismsDiffer>
    <experiments>3</experiments>
</comment>
<comment type="interaction">
    <interactant intactId="EBI-466029">
        <id>P42858</id>
    </interactant>
    <interactant intactId="EBI-372312">
        <id>P28062-2</id>
        <label>PSMB8</label>
    </interactant>
    <organismsDiffer>false</organismsDiffer>
    <experiments>3</experiments>
</comment>
<comment type="interaction">
    <interactant intactId="EBI-466029">
        <id>P42858</id>
    </interactant>
    <interactant intactId="EBI-359720">
        <id>P17980</id>
        <label>PSMC3</label>
    </interactant>
    <organismsDiffer>false</organismsDiffer>
    <experiments>6</experiments>
</comment>
<comment type="interaction">
    <interactant intactId="EBI-466029">
        <id>P42858</id>
    </interactant>
    <interactant intactId="EBI-722193">
        <id>O00487</id>
        <label>PSMD14</label>
    </interactant>
    <organismsDiffer>false</organismsDiffer>
    <experiments>7</experiments>
</comment>
<comment type="interaction">
    <interactant intactId="EBI-466029">
        <id>P42858</id>
    </interactant>
    <interactant intactId="EBI-357622">
        <id>O43242</id>
        <label>PSMD3</label>
    </interactant>
    <organismsDiffer>false</organismsDiffer>
    <experiments>3</experiments>
</comment>
<comment type="interaction">
    <interactant intactId="EBI-466029">
        <id>P42858</id>
    </interactant>
    <interactant intactId="EBI-359318">
        <id>P55036</id>
        <label>PSMD4</label>
    </interactant>
    <organismsDiffer>false</organismsDiffer>
    <experiments>5</experiments>
</comment>
<comment type="interaction">
    <interactant intactId="EBI-466029">
        <id>P42858</id>
    </interactant>
    <interactant intactId="EBI-357659">
        <id>P51665</id>
        <label>PSMD7</label>
    </interactant>
    <organismsDiffer>false</organismsDiffer>
    <experiments>10</experiments>
</comment>
<comment type="interaction">
    <interactant intactId="EBI-466029">
        <id>P42858</id>
    </interactant>
    <interactant intactId="EBI-14199621">
        <id>Q13635-3</id>
        <label>PTCH1</label>
    </interactant>
    <organismsDiffer>false</organismsDiffer>
    <experiments>3</experiments>
</comment>
<comment type="interaction">
    <interactant intactId="EBI-466029">
        <id>P42858</id>
    </interactant>
    <interactant intactId="EBI-948821">
        <id>P41222</id>
        <label>PTGDS</label>
    </interactant>
    <organismsDiffer>false</organismsDiffer>
    <experiments>3</experiments>
</comment>
<comment type="interaction">
    <interactant intactId="EBI-466029">
        <id>P42858</id>
    </interactant>
    <interactant intactId="EBI-1383632">
        <id>Q13882</id>
        <label>PTK6</label>
    </interactant>
    <organismsDiffer>false</organismsDiffer>
    <experiments>4</experiments>
</comment>
<comment type="interaction">
    <interactant intactId="EBI-466029">
        <id>P42858</id>
    </interactant>
    <interactant intactId="EBI-11529177">
        <id>Q9UHX1-2</id>
        <label>PUF60</label>
    </interactant>
    <organismsDiffer>false</organismsDiffer>
    <experiments>6</experiments>
</comment>
<comment type="interaction">
    <interactant intactId="EBI-466029">
        <id>P42858</id>
    </interactant>
    <interactant intactId="EBI-11085298">
        <id>Q9UHX1-6</id>
        <label>PUF60</label>
    </interactant>
    <organismsDiffer>false</organismsDiffer>
    <experiments>9</experiments>
</comment>
<comment type="interaction">
    <interactant intactId="EBI-466029">
        <id>P42858</id>
    </interactant>
    <interactant intactId="EBI-347462">
        <id>P47897</id>
        <label>QARS1</label>
    </interactant>
    <organismsDiffer>false</organismsDiffer>
    <experiments>6</experiments>
</comment>
<comment type="interaction">
    <interactant intactId="EBI-466029">
        <id>P42858</id>
    </interactant>
    <interactant intactId="EBI-722275">
        <id>Q15286</id>
        <label>RAB35</label>
    </interactant>
    <organismsDiffer>false</organismsDiffer>
    <experiments>3</experiments>
</comment>
<comment type="interaction">
    <interactant intactId="EBI-466029">
        <id>P42858</id>
    </interactant>
    <interactant intactId="EBI-399401">
        <id>P61020</id>
        <label>RAB5B</label>
    </interactant>
    <organismsDiffer>false</organismsDiffer>
    <experiments>3</experiments>
</comment>
<comment type="interaction">
    <interactant intactId="EBI-466029">
        <id>P42858</id>
    </interactant>
    <interactant intactId="EBI-746453">
        <id>P54725</id>
        <label>RAD23A</label>
    </interactant>
    <organismsDiffer>false</organismsDiffer>
    <experiments>3</experiments>
</comment>
<comment type="interaction">
    <interactant intactId="EBI-466029">
        <id>P42858</id>
    </interactant>
    <interactant intactId="EBI-724495">
        <id>P78406</id>
        <label>RAE1</label>
    </interactant>
    <organismsDiffer>false</organismsDiffer>
    <experiments>4</experiments>
</comment>
<comment type="interaction">
    <interactant intactId="EBI-466029">
        <id>P42858</id>
    </interactant>
    <interactant intactId="EBI-286642">
        <id>P62826</id>
        <label>RAN</label>
    </interactant>
    <organismsDiffer>false</organismsDiffer>
    <experiments>6</experiments>
</comment>
<comment type="interaction">
    <interactant intactId="EBI-466029">
        <id>P42858</id>
    </interactant>
    <interactant intactId="EBI-396091">
        <id>P46060</id>
        <label>RANGAP1</label>
    </interactant>
    <organismsDiffer>false</organismsDiffer>
    <experiments>10</experiments>
</comment>
<comment type="interaction">
    <interactant intactId="EBI-466029">
        <id>P42858</id>
    </interactant>
    <interactant intactId="EBI-948476">
        <id>Q8WZA2</id>
        <label>RAPGEF4</label>
    </interactant>
    <organismsDiffer>false</organismsDiffer>
    <experiments>3</experiments>
</comment>
<comment type="interaction">
    <interactant intactId="EBI-466029">
        <id>P42858</id>
    </interactant>
    <interactant intactId="EBI-22012855">
        <id>Q13702-2</id>
        <label>RAPSN</label>
    </interactant>
    <organismsDiffer>false</organismsDiffer>
    <experiments>18</experiments>
</comment>
<comment type="interaction">
    <interactant intactId="EBI-466029">
        <id>P42858</id>
    </interactant>
    <interactant intactId="EBI-1026476">
        <id>P20936</id>
        <label>RASA1</label>
    </interactant>
    <organismsDiffer>false</organismsDiffer>
    <experiments>3</experiments>
</comment>
<comment type="interaction">
    <interactant intactId="EBI-466029">
        <id>P42858</id>
    </interactant>
    <interactant intactId="EBI-4401868">
        <id>Q6T310</id>
        <label>RASL11A</label>
    </interactant>
    <organismsDiffer>false</organismsDiffer>
    <experiments>3</experiments>
</comment>
<comment type="interaction">
    <interactant intactId="EBI-466029">
        <id>P42858</id>
    </interactant>
    <interactant intactId="EBI-438710">
        <id>Q9NS23-4</id>
        <label>RASSF1</label>
    </interactant>
    <organismsDiffer>false</organismsDiffer>
    <experiments>3</experiments>
</comment>
<comment type="interaction">
    <interactant intactId="EBI-466029">
        <id>P42858</id>
    </interactant>
    <interactant intactId="EBI-960081">
        <id>P50749</id>
        <label>RASSF2</label>
    </interactant>
    <organismsDiffer>false</organismsDiffer>
    <experiments>3</experiments>
</comment>
<comment type="interaction">
    <interactant intactId="EBI-466029">
        <id>P42858</id>
    </interactant>
    <interactant intactId="EBI-960502">
        <id>Q8WWW0-2</id>
        <label>RASSF5</label>
    </interactant>
    <organismsDiffer>false</organismsDiffer>
    <experiments>3</experiments>
</comment>
<comment type="interaction">
    <interactant intactId="EBI-466029">
        <id>P42858</id>
    </interactant>
    <interactant intactId="EBI-11531589">
        <id>O43251-3</id>
        <label>RBFOX2</label>
    </interactant>
    <organismsDiffer>false</organismsDiffer>
    <experiments>3</experiments>
</comment>
<comment type="interaction">
    <interactant intactId="EBI-466029">
        <id>P42858</id>
    </interactant>
    <interactant intactId="EBI-741332">
        <id>P57052</id>
        <label>RBM11</label>
    </interactant>
    <organismsDiffer>false</organismsDiffer>
    <experiments>9</experiments>
</comment>
<comment type="interaction">
    <interactant intactId="EBI-466029">
        <id>P42858</id>
    </interactant>
    <interactant intactId="EBI-714003">
        <id>P52756</id>
        <label>RBM5</label>
    </interactant>
    <organismsDiffer>false</organismsDiffer>
    <experiments>6</experiments>
</comment>
<comment type="interaction">
    <interactant intactId="EBI-466029">
        <id>P42858</id>
    </interactant>
    <interactant intactId="EBI-740343">
        <id>Q93062-3</id>
        <label>RBPMS</label>
    </interactant>
    <organismsDiffer>false</organismsDiffer>
    <experiments>3</experiments>
</comment>
<comment type="interaction">
    <interactant intactId="EBI-466029">
        <id>P42858</id>
    </interactant>
    <interactant intactId="EBI-9091952">
        <id>Q9UKA8</id>
        <label>RCAN3</label>
    </interactant>
    <organismsDiffer>false</organismsDiffer>
    <experiments>18</experiments>
</comment>
<comment type="interaction">
    <interactant intactId="EBI-466029">
        <id>P42858</id>
    </interactant>
    <interactant intactId="EBI-948278">
        <id>Q15293</id>
        <label>RCN1</label>
    </interactant>
    <organismsDiffer>false</organismsDiffer>
    <experiments>3</experiments>
</comment>
<comment type="interaction">
    <interactant intactId="EBI-466029">
        <id>P42858</id>
    </interactant>
    <interactant intactId="EBI-2856313">
        <id>Q9GZR2</id>
        <label>REXO4</label>
    </interactant>
    <organismsDiffer>false</organismsDiffer>
    <experiments>3</experiments>
</comment>
<comment type="interaction">
    <interactant intactId="EBI-466029">
        <id>P42858</id>
    </interactant>
    <interactant intactId="EBI-21890191">
        <id>Q8IXN7</id>
        <label>RIMKLA</label>
    </interactant>
    <organismsDiffer>false</organismsDiffer>
    <experiments>3</experiments>
</comment>
<comment type="interaction">
    <interactant intactId="EBI-466029">
        <id>P42858</id>
    </interactant>
    <interactant intactId="EBI-726876">
        <id>Q6NUQ1</id>
        <label>RINT1</label>
    </interactant>
    <organismsDiffer>false</organismsDiffer>
    <experiments>3</experiments>
</comment>
<comment type="interaction">
    <interactant intactId="EBI-466029">
        <id>P42858</id>
    </interactant>
    <interactant intactId="EBI-10246897">
        <id>Q5TAB7</id>
        <label>RIPPLY2</label>
    </interactant>
    <organismsDiffer>false</organismsDiffer>
    <experiments>6</experiments>
</comment>
<comment type="interaction">
    <interactant intactId="EBI-466029">
        <id>P42858</id>
    </interactant>
    <interactant intactId="EBI-21535400">
        <id>Q6ZNA4-2</id>
        <label>RNF111</label>
    </interactant>
    <organismsDiffer>false</organismsDiffer>
    <experiments>18</experiments>
</comment>
<comment type="interaction">
    <interactant intactId="EBI-466029">
        <id>P42858</id>
    </interactant>
    <interactant intactId="EBI-25829984">
        <id>Q9ULX5</id>
        <label>RNF112</label>
    </interactant>
    <organismsDiffer>false</organismsDiffer>
    <experiments>21</experiments>
</comment>
<comment type="interaction">
    <interactant intactId="EBI-466029">
        <id>P42858</id>
    </interactant>
    <interactant intactId="EBI-743938">
        <id>Q96D59</id>
        <label>RNF183</label>
    </interactant>
    <organismsDiffer>false</organismsDiffer>
    <experiments>3</experiments>
</comment>
<comment type="interaction">
    <interactant intactId="EBI-466029">
        <id>P42858</id>
    </interactant>
    <interactant intactId="EBI-2372238">
        <id>Q5VTR2</id>
        <label>RNF20</label>
    </interactant>
    <organismsDiffer>false</organismsDiffer>
    <experiments>24</experiments>
</comment>
<comment type="interaction">
    <interactant intactId="EBI-466029">
        <id>P42858</id>
    </interactant>
    <interactant intactId="EBI-25866807">
        <id>Q9H0F5-2</id>
        <label>RNF38</label>
    </interactant>
    <organismsDiffer>false</organismsDiffer>
    <experiments>21</experiments>
</comment>
<comment type="interaction">
    <interactant intactId="EBI-466029">
        <id>P42858</id>
    </interactant>
    <interactant intactId="EBI-744408">
        <id>O75150</id>
        <label>RNF40</label>
    </interactant>
    <organismsDiffer>false</organismsDiffer>
    <experiments>12</experiments>
</comment>
<comment type="interaction">
    <interactant intactId="EBI-466029">
        <id>P42858</id>
    </interactant>
    <interactant intactId="EBI-356849">
        <id>P26373</id>
        <label>RPL13</label>
    </interactant>
    <organismsDiffer>false</organismsDiffer>
    <experiments>10</experiments>
</comment>
<comment type="interaction">
    <interactant intactId="EBI-466029">
        <id>P42858</id>
    </interactant>
    <interactant intactId="EBI-10252046">
        <id>Q6NZ55</id>
        <label>RPL13</label>
    </interactant>
    <organismsDiffer>false</organismsDiffer>
    <experiments>3</experiments>
</comment>
<comment type="interaction">
    <interactant intactId="EBI-466029">
        <id>P42858</id>
    </interactant>
    <interactant intactId="EBI-443462">
        <id>P61313</id>
        <label>RPL15</label>
    </interactant>
    <organismsDiffer>false</organismsDiffer>
    <experiments>3</experiments>
</comment>
<comment type="interaction">
    <interactant intactId="EBI-466029">
        <id>P42858</id>
    </interactant>
    <interactant intactId="EBI-352694">
        <id>Q07020</id>
        <label>RPL18</label>
    </interactant>
    <organismsDiffer>false</organismsDiffer>
    <experiments>12</experiments>
</comment>
<comment type="interaction">
    <interactant intactId="EBI-466029">
        <id>P42858</id>
    </interactant>
    <interactant intactId="EBI-916524">
        <id>P84098</id>
        <label>RPL19</label>
    </interactant>
    <organismsDiffer>false</organismsDiffer>
    <experiments>6</experiments>
</comment>
<comment type="interaction">
    <interactant intactId="EBI-466029">
        <id>P42858</id>
    </interactant>
    <interactant intactId="EBI-354533">
        <id>P35268</id>
        <label>RPL22</label>
    </interactant>
    <organismsDiffer>false</organismsDiffer>
    <experiments>3</experiments>
</comment>
<comment type="interaction">
    <interactant intactId="EBI-466029">
        <id>P42858</id>
    </interactant>
    <interactant intactId="EBI-2949703">
        <id>Q9UNX3</id>
        <label>RPL26L1</label>
    </interactant>
    <organismsDiffer>false</organismsDiffer>
    <experiments>3</experiments>
</comment>
<comment type="interaction">
    <interactant intactId="EBI-466029">
        <id>P42858</id>
    </interactant>
    <interactant intactId="EBI-352760">
        <id>P61353</id>
        <label>RPL27</label>
    </interactant>
    <organismsDiffer>false</organismsDiffer>
    <experiments>6</experiments>
</comment>
<comment type="interaction">
    <interactant intactId="EBI-466029">
        <id>P42858</id>
    </interactant>
    <interactant intactId="EBI-1053664">
        <id>P62899</id>
        <label>RPL31</label>
    </interactant>
    <organismsDiffer>false</organismsDiffer>
    <experiments>3</experiments>
</comment>
<comment type="interaction">
    <interactant intactId="EBI-466029">
        <id>P42858</id>
    </interactant>
    <interactant intactId="EBI-348313">
        <id>P36578</id>
        <label>RPL4</label>
    </interactant>
    <organismsDiffer>false</organismsDiffer>
    <experiments>14</experiments>
</comment>
<comment type="interaction">
    <interactant intactId="EBI-466029">
        <id>P42858</id>
    </interactant>
    <interactant intactId="EBI-354542">
        <id>P25398</id>
        <label>RPS12</label>
    </interactant>
    <organismsDiffer>false</organismsDiffer>
    <experiments>3</experiments>
</comment>
<comment type="interaction">
    <interactant intactId="EBI-466029">
        <id>P42858</id>
    </interactant>
    <interactant intactId="EBI-347895">
        <id>P62244</id>
        <label>RPS15A</label>
    </interactant>
    <organismsDiffer>false</organismsDiffer>
    <experiments>3</experiments>
</comment>
<comment type="interaction">
    <interactant intactId="EBI-466029">
        <id>P42858</id>
    </interactant>
    <interactant intactId="EBI-354451">
        <id>P39019</id>
        <label>RPS19</label>
    </interactant>
    <organismsDiffer>false</organismsDiffer>
    <experiments>3</experiments>
</comment>
<comment type="interaction">
    <interactant intactId="EBI-466029">
        <id>P42858</id>
    </interactant>
    <interactant intactId="EBI-357375">
        <id>P62979</id>
        <label>RPS27A</label>
    </interactant>
    <organismsDiffer>false</organismsDiffer>
    <experiments>6</experiments>
</comment>
<comment type="interaction">
    <interactant intactId="EBI-466029">
        <id>P42858</id>
    </interactant>
    <interactant intactId="EBI-351193">
        <id>P23396</id>
        <label>RPS3</label>
    </interactant>
    <organismsDiffer>false</organismsDiffer>
    <experiments>3</experiments>
</comment>
<comment type="interaction">
    <interactant intactId="EBI-466029">
        <id>P42858</id>
    </interactant>
    <interactant intactId="EBI-350569">
        <id>P46782</id>
        <label>RPS5</label>
    </interactant>
    <organismsDiffer>false</organismsDiffer>
    <experiments>3</experiments>
</comment>
<comment type="interaction">
    <interactant intactId="EBI-466029">
        <id>P42858</id>
    </interactant>
    <interactant intactId="EBI-10180131">
        <id>Q16799-3</id>
        <label>RTN1</label>
    </interactant>
    <organismsDiffer>false</organismsDiffer>
    <experiments>9</experiments>
</comment>
<comment type="interaction">
    <interactant intactId="EBI-466029">
        <id>P42858</id>
    </interactant>
    <interactant intactId="EBI-10181525">
        <id>Q6ZNE9</id>
        <label>RUFY4</label>
    </interactant>
    <organismsDiffer>false</organismsDiffer>
    <experiments>3</experiments>
</comment>
<comment type="interaction">
    <interactant intactId="EBI-466029">
        <id>P42858</id>
    </interactant>
    <interactant intactId="EBI-10248967">
        <id>Q66K80</id>
        <label>RUSC1-AS1</label>
    </interactant>
    <organismsDiffer>false</organismsDiffer>
    <experiments>6</experiments>
</comment>
<comment type="interaction">
    <interactant intactId="EBI-466029">
        <id>P42858</id>
    </interactant>
    <interactant intactId="EBI-8636004">
        <id>Q96GQ5</id>
        <label>RUSF1</label>
    </interactant>
    <organismsDiffer>false</organismsDiffer>
    <experiments>3</experiments>
</comment>
<comment type="interaction">
    <interactant intactId="EBI-466029">
        <id>P42858</id>
    </interactant>
    <interactant intactId="EBI-712405">
        <id>P48443</id>
        <label>RXRG</label>
    </interactant>
    <organismsDiffer>false</organismsDiffer>
    <experiments>18</experiments>
</comment>
<comment type="interaction">
    <interactant intactId="EBI-466029">
        <id>P42858</id>
    </interactant>
    <interactant intactId="EBI-752324">
        <id>Q8N488</id>
        <label>RYBP</label>
    </interactant>
    <organismsDiffer>false</organismsDiffer>
    <experiments>9</experiments>
</comment>
<comment type="interaction">
    <interactant intactId="EBI-466029">
        <id>P42858</id>
    </interactant>
    <interactant intactId="EBI-743700">
        <id>P25815</id>
        <label>S100P</label>
    </interactant>
    <organismsDiffer>false</organismsDiffer>
    <experiments>9</experiments>
</comment>
<comment type="interaction">
    <interactant intactId="EBI-466029">
        <id>P42858</id>
    </interactant>
    <interactant intactId="EBI-11528848">
        <id>Q8N6K7-2</id>
        <label>SAMD3</label>
    </interactant>
    <organismsDiffer>false</organismsDiffer>
    <experiments>3</experiments>
</comment>
<comment type="interaction">
    <interactant intactId="EBI-466029">
        <id>P42858</id>
    </interactant>
    <interactant intactId="EBI-21264240">
        <id>G3V2R1</id>
        <label>SAMD4A</label>
    </interactant>
    <organismsDiffer>false</organismsDiffer>
    <experiments>3</experiments>
</comment>
<comment type="interaction">
    <interactant intactId="EBI-466029">
        <id>P42858</id>
    </interactant>
    <interactant intactId="EBI-632609">
        <id>O75446</id>
        <label>SAP30</label>
    </interactant>
    <organismsDiffer>false</organismsDiffer>
    <experiments>3</experiments>
</comment>
<comment type="interaction">
    <interactant intactId="EBI-466029">
        <id>P42858</id>
    </interactant>
    <interactant intactId="EBI-1570153">
        <id>Q6UVJ0</id>
        <label>SASS6</label>
    </interactant>
    <organismsDiffer>false</organismsDiffer>
    <experiments>15</experiments>
</comment>
<comment type="interaction">
    <interactant intactId="EBI-466029">
        <id>P42858</id>
    </interactant>
    <interactant intactId="EBI-25837959">
        <id>Q9BY12-3</id>
        <label>SCAPER</label>
    </interactant>
    <organismsDiffer>false</organismsDiffer>
    <experiments>6</experiments>
</comment>
<comment type="interaction">
    <interactant intactId="EBI-466029">
        <id>P42858</id>
    </interactant>
    <interactant intactId="EBI-722569">
        <id>Q8WVM8</id>
        <label>SCFD1</label>
    </interactant>
    <organismsDiffer>false</organismsDiffer>
    <experiments>3</experiments>
</comment>
<comment type="interaction">
    <interactant intactId="EBI-466029">
        <id>P42858</id>
    </interactant>
    <interactant intactId="EBI-25961722">
        <id>Q96NL6-3</id>
        <label>SCLT1</label>
    </interactant>
    <organismsDiffer>false</organismsDiffer>
    <experiments>3</experiments>
</comment>
<comment type="interaction">
    <interactant intactId="EBI-466029">
        <id>P42858</id>
    </interactant>
    <interactant intactId="EBI-12027936">
        <id>Q12765-2</id>
        <label>SCRN1</label>
    </interactant>
    <organismsDiffer>false</organismsDiffer>
    <experiments>3</experiments>
</comment>
<comment type="interaction">
    <interactant intactId="EBI-466029">
        <id>P42858</id>
    </interactant>
    <interactant intactId="EBI-727004">
        <id>O00560</id>
        <label>SDCBP</label>
    </interactant>
    <organismsDiffer>false</organismsDiffer>
    <experiments>12</experiments>
</comment>
<comment type="interaction">
    <interactant intactId="EBI-466029">
        <id>P42858</id>
    </interactant>
    <interactant intactId="EBI-12235008">
        <id>P55735-3</id>
        <label>SEC13</label>
    </interactant>
    <organismsDiffer>false</organismsDiffer>
    <experiments>15</experiments>
</comment>
<comment type="interaction">
    <interactant intactId="EBI-466029">
        <id>P42858</id>
    </interactant>
    <interactant intactId="EBI-742673">
        <id>Q15437</id>
        <label>SEC23B</label>
    </interactant>
    <organismsDiffer>false</organismsDiffer>
    <experiments>3</experiments>
</comment>
<comment type="interaction">
    <interactant intactId="EBI-466029">
        <id>P42858</id>
    </interactant>
    <interactant intactId="EBI-954116">
        <id>Q96T21</id>
        <label>SECISBP2</label>
    </interactant>
    <organismsDiffer>false</organismsDiffer>
    <experiments>3</experiments>
</comment>
<comment type="interaction">
    <interactant intactId="EBI-466029">
        <id>P42858</id>
    </interactant>
    <interactant intactId="EBI-1047513">
        <id>O43236</id>
        <label>SEPTIN4</label>
    </interactant>
    <organismsDiffer>false</organismsDiffer>
    <experiments>3</experiments>
</comment>
<comment type="interaction">
    <interactant intactId="EBI-466029">
        <id>P42858</id>
    </interactant>
    <interactant intactId="EBI-745901">
        <id>Q14141</id>
        <label>SEPTIN6</label>
    </interactant>
    <organismsDiffer>false</organismsDiffer>
    <experiments>18</experiments>
</comment>
<comment type="interaction">
    <interactant intactId="EBI-466029">
        <id>P42858</id>
    </interactant>
    <interactant intactId="EBI-10176094">
        <id>Q16181-2</id>
        <label>SEPTIN7</label>
    </interactant>
    <organismsDiffer>false</organismsDiffer>
    <experiments>9</experiments>
</comment>
<comment type="interaction">
    <interactant intactId="EBI-466029">
        <id>P42858</id>
    </interactant>
    <interactant intactId="EBI-748601">
        <id>Q9UHV2</id>
        <label>SERTAD1</label>
    </interactant>
    <organismsDiffer>false</organismsDiffer>
    <experiments>3</experiments>
</comment>
<comment type="interaction">
    <interactant intactId="EBI-466029">
        <id>P42858</id>
    </interactant>
    <interactant intactId="EBI-945869">
        <id>Q9BYW2</id>
        <label>SETD2</label>
    </interactant>
    <organismsDiffer>false</organismsDiffer>
    <experiments>4</experiments>
</comment>
<comment type="interaction">
    <interactant intactId="EBI-466029">
        <id>P42858</id>
    </interactant>
    <interactant intactId="EBI-9090795">
        <id>Q15047-2</id>
        <label>SETDB1</label>
    </interactant>
    <organismsDiffer>false</organismsDiffer>
    <experiments>15</experiments>
</comment>
<comment type="interaction">
    <interactant intactId="EBI-466029">
        <id>P42858</id>
    </interactant>
    <interactant intactId="EBI-1051880">
        <id>Q12874</id>
        <label>SF3A3</label>
    </interactant>
    <organismsDiffer>false</organismsDiffer>
    <experiments>3</experiments>
</comment>
<comment type="interaction">
    <interactant intactId="EBI-466029">
        <id>P42858</id>
    </interactant>
    <interactant intactId="EBI-346977">
        <id>Q15393</id>
        <label>SF3B3</label>
    </interactant>
    <organismsDiffer>false</organismsDiffer>
    <experiments>3</experiments>
</comment>
<comment type="interaction">
    <interactant intactId="EBI-466029">
        <id>P42858</id>
    </interactant>
    <interactant intactId="EBI-1171999">
        <id>Q9BWM7</id>
        <label>SFXN3</label>
    </interactant>
    <organismsDiffer>false</organismsDiffer>
    <experiments>9</experiments>
</comment>
<comment type="interaction">
    <interactant intactId="EBI-466029">
        <id>P42858</id>
    </interactant>
    <interactant intactId="EBI-10182463">
        <id>Q2NKQ1-4</id>
        <label>SGSM1</label>
    </interactant>
    <organismsDiffer>false</organismsDiffer>
    <experiments>12</experiments>
</comment>
<comment type="interaction">
    <interactant intactId="EBI-466029">
        <id>P42858</id>
    </interactant>
    <interactant intactId="EBI-697911">
        <id>Q99961</id>
        <label>SH3GL1</label>
    </interactant>
    <organismsDiffer>false</organismsDiffer>
    <experiments>3</experiments>
</comment>
<comment type="interaction">
    <interactant intactId="EBI-466029">
        <id>P42858</id>
    </interactant>
    <interactant intactId="EBI-473910">
        <id>Q99963</id>
        <label>SH3GL3</label>
    </interactant>
    <organismsDiffer>false</organismsDiffer>
    <experiments>9</experiments>
</comment>
<comment type="interaction">
    <interactant intactId="EBI-466029">
        <id>P42858</id>
    </interactant>
    <interactant intactId="EBI-749607">
        <id>Q9NR46</id>
        <label>SH3GLB2</label>
    </interactant>
    <organismsDiffer>false</organismsDiffer>
    <experiments>3</experiments>
</comment>
<comment type="interaction">
    <interactant intactId="EBI-466029">
        <id>P42858</id>
    </interactant>
    <interactant intactId="EBI-2560428">
        <id>Q8IYI0</id>
        <label>SHLD1</label>
    </interactant>
    <organismsDiffer>false</organismsDiffer>
    <experiments>3</experiments>
</comment>
<comment type="interaction">
    <interactant intactId="EBI-466029">
        <id>P42858</id>
    </interactant>
    <interactant intactId="EBI-17172855">
        <id>Q9Y2K2-7</id>
        <label>SIK3</label>
    </interactant>
    <organismsDiffer>false</organismsDiffer>
    <experiments>3</experiments>
</comment>
<comment type="interaction">
    <interactant intactId="EBI-466029">
        <id>P42858</id>
    </interactant>
    <interactant intactId="EBI-347218">
        <id>Q96ST3</id>
        <label>SIN3A</label>
    </interactant>
    <organismsDiffer>false</organismsDiffer>
    <experiments>4</experiments>
</comment>
<comment type="interaction">
    <interactant intactId="EBI-466029">
        <id>P42858</id>
    </interactant>
    <interactant intactId="EBI-358545">
        <id>Q9GZS3</id>
        <label>SKIC8</label>
    </interactant>
    <organismsDiffer>false</organismsDiffer>
    <experiments>22</experiments>
</comment>
<comment type="interaction">
    <interactant intactId="EBI-466029">
        <id>P42858</id>
    </interactant>
    <interactant intactId="EBI-3440986">
        <id>P43004</id>
        <label>SLC1A2</label>
    </interactant>
    <organismsDiffer>false</organismsDiffer>
    <experiments>12</experiments>
</comment>
<comment type="interaction">
    <interactant intactId="EBI-466029">
        <id>P42858</id>
    </interactant>
    <interactant intactId="EBI-359174">
        <id>Q02978</id>
        <label>SLC25A11</label>
    </interactant>
    <organismsDiffer>false</organismsDiffer>
    <experiments>6</experiments>
</comment>
<comment type="interaction">
    <interactant intactId="EBI-466029">
        <id>P42858</id>
    </interactant>
    <interactant intactId="EBI-5456178">
        <id>Q00325-2</id>
        <label>SLC25A3</label>
    </interactant>
    <organismsDiffer>false</organismsDiffer>
    <experiments>3</experiments>
</comment>
<comment type="interaction">
    <interactant intactId="EBI-466029">
        <id>P42858</id>
    </interactant>
    <interactant intactId="EBI-21504521">
        <id>Q8NCS7</id>
        <label>SLC44A5</label>
    </interactant>
    <organismsDiffer>false</organismsDiffer>
    <experiments>3</experiments>
</comment>
<comment type="interaction">
    <interactant intactId="EBI-466029">
        <id>P42858</id>
    </interactant>
    <interactant intactId="EBI-358419">
        <id>Q12824</id>
        <label>SMARCB1</label>
    </interactant>
    <organismsDiffer>false</organismsDiffer>
    <experiments>9</experiments>
</comment>
<comment type="interaction">
    <interactant intactId="EBI-466029">
        <id>P42858</id>
    </interactant>
    <interactant intactId="EBI-11990400">
        <id>Q8TAQ2-2</id>
        <label>SMARCC2</label>
    </interactant>
    <organismsDiffer>false</organismsDiffer>
    <experiments>3</experiments>
</comment>
<comment type="interaction">
    <interactant intactId="EBI-466029">
        <id>P42858</id>
    </interactant>
    <interactant intactId="EBI-358489">
        <id>Q96GM5</id>
        <label>SMARCD1</label>
    </interactant>
    <organismsDiffer>false</organismsDiffer>
    <experiments>12</experiments>
</comment>
<comment type="interaction">
    <interactant intactId="EBI-466029">
        <id>P42858</id>
    </interactant>
    <interactant intactId="EBI-395447">
        <id>Q16637-3</id>
        <label>SMN2</label>
    </interactant>
    <organismsDiffer>false</organismsDiffer>
    <experiments>9</experiments>
</comment>
<comment type="interaction">
    <interactant intactId="EBI-466029">
        <id>P42858</id>
    </interactant>
    <interactant intactId="EBI-9845742">
        <id>Q9HCE7-2</id>
        <label>SMURF1</label>
    </interactant>
    <organismsDiffer>false</organismsDiffer>
    <experiments>6</experiments>
</comment>
<comment type="interaction">
    <interactant intactId="EBI-466029">
        <id>P42858</id>
    </interactant>
    <interactant intactId="EBI-12177361">
        <id>P60880-2</id>
        <label>SNAP25</label>
    </interactant>
    <organismsDiffer>false</organismsDiffer>
    <experiments>9</experiments>
</comment>
<comment type="interaction">
    <interactant intactId="EBI-466029">
        <id>P42858</id>
    </interactant>
    <interactant intactId="EBI-490676">
        <id>O95721</id>
        <label>SNAP29</label>
    </interactant>
    <organismsDiffer>false</organismsDiffer>
    <experiments>3</experiments>
</comment>
<comment type="interaction">
    <interactant intactId="EBI-466029">
        <id>P42858</id>
    </interactant>
    <interactant intactId="EBI-985879">
        <id>P37840</id>
        <label>SNCA</label>
    </interactant>
    <organismsDiffer>false</organismsDiffer>
    <experiments>4</experiments>
</comment>
<comment type="interaction">
    <interactant intactId="EBI-466029">
        <id>P42858</id>
    </interactant>
    <interactant intactId="EBI-297993">
        <id>P62316</id>
        <label>SNRPD2</label>
    </interactant>
    <organismsDiffer>false</organismsDiffer>
    <experiments>3</experiments>
</comment>
<comment type="interaction">
    <interactant intactId="EBI-466029">
        <id>P42858</id>
    </interactant>
    <interactant intactId="EBI-356900">
        <id>P62306</id>
        <label>SNRPF</label>
    </interactant>
    <organismsDiffer>false</organismsDiffer>
    <experiments>3</experiments>
</comment>
<comment type="interaction">
    <interactant intactId="EBI-466029">
        <id>P42858</id>
    </interactant>
    <interactant intactId="EBI-632715">
        <id>Q13573</id>
        <label>SNW1</label>
    </interactant>
    <organismsDiffer>false</organismsDiffer>
    <experiments>12</experiments>
</comment>
<comment type="interaction">
    <interactant intactId="EBI-466029">
        <id>P42858</id>
    </interactant>
    <interactant intactId="EBI-1752602">
        <id>Q9UMY4</id>
        <label>SNX12</label>
    </interactant>
    <organismsDiffer>false</organismsDiffer>
    <experiments>3</experiments>
</comment>
<comment type="interaction">
    <interactant intactId="EBI-466029">
        <id>P42858</id>
    </interactant>
    <interactant intactId="EBI-1046690">
        <id>O60749</id>
        <label>SNX2</label>
    </interactant>
    <organismsDiffer>false</organismsDiffer>
    <experiments>6</experiments>
</comment>
<comment type="interaction">
    <interactant intactId="EBI-466029">
        <id>P42858</id>
    </interactant>
    <interactant intactId="EBI-2481535">
        <id>Q8WV41</id>
        <label>SNX33</label>
    </interactant>
    <organismsDiffer>false</organismsDiffer>
    <experiments>6</experiments>
</comment>
<comment type="interaction">
    <interactant intactId="EBI-466029">
        <id>P42858</id>
    </interactant>
    <interactant intactId="EBI-3942425">
        <id>Q8WXH5</id>
        <label>SOCS4</label>
    </interactant>
    <organismsDiffer>false</organismsDiffer>
    <experiments>3</experiments>
</comment>
<comment type="interaction">
    <interactant intactId="EBI-466029">
        <id>P42858</id>
    </interactant>
    <interactant intactId="EBI-433642">
        <id>Q9BX66</id>
        <label>SORBS1</label>
    </interactant>
    <organismsDiffer>false</organismsDiffer>
    <experiments>4</experiments>
</comment>
<comment type="interaction">
    <interactant intactId="EBI-466029">
        <id>P42858</id>
    </interactant>
    <interactant intactId="EBI-9087806">
        <id>O95416</id>
        <label>SOX14</label>
    </interactant>
    <organismsDiffer>false</organismsDiffer>
    <experiments>12</experiments>
</comment>
<comment type="interaction">
    <interactant intactId="EBI-466029">
        <id>P42858</id>
    </interactant>
    <interactant intactId="EBI-7239117">
        <id>Q9BT81</id>
        <label>SOX7</label>
    </interactant>
    <organismsDiffer>false</organismsDiffer>
    <experiments>15</experiments>
</comment>
<comment type="interaction">
    <interactant intactId="EBI-466029">
        <id>P42858</id>
    </interactant>
    <interactant intactId="EBI-348158">
        <id>Q02447</id>
        <label>SP3</label>
    </interactant>
    <organismsDiffer>false</organismsDiffer>
    <experiments>4</experiments>
</comment>
<comment type="interaction">
    <interactant intactId="EBI-466029">
        <id>P42858</id>
    </interactant>
    <interactant intactId="EBI-11175533">
        <id>Q3SY56</id>
        <label>SP6</label>
    </interactant>
    <organismsDiffer>false</organismsDiffer>
    <experiments>3</experiments>
</comment>
<comment type="interaction">
    <interactant intactId="EBI-466029">
        <id>P42858</id>
    </interactant>
    <interactant intactId="EBI-11959123">
        <id>Q99932-2</id>
        <label>SPAG8</label>
    </interactant>
    <organismsDiffer>false</organismsDiffer>
    <experiments>18</experiments>
</comment>
<comment type="interaction">
    <interactant intactId="EBI-466029">
        <id>P42858</id>
    </interactant>
    <interactant intactId="EBI-10316585">
        <id>Q9NY87</id>
        <label>SPANXC</label>
    </interactant>
    <organismsDiffer>false</organismsDiffer>
    <experiments>3</experiments>
</comment>
<comment type="interaction">
    <interactant intactId="EBI-466029">
        <id>P42858</id>
    </interactant>
    <interactant intactId="EBI-10696971">
        <id>Q7Z6I5</id>
        <label>SPATA12</label>
    </interactant>
    <organismsDiffer>false</organismsDiffer>
    <experiments>3</experiments>
</comment>
<comment type="interaction">
    <interactant intactId="EBI-466029">
        <id>P42858</id>
    </interactant>
    <interactant intactId="EBI-7067260">
        <id>Q8NHS9</id>
        <label>SPATA22</label>
    </interactant>
    <organismsDiffer>false</organismsDiffer>
    <experiments>9</experiments>
</comment>
<comment type="interaction">
    <interactant intactId="EBI-466029">
        <id>P42858</id>
    </interactant>
    <interactant intactId="EBI-2510414">
        <id>Q8IUW3</id>
        <label>SPATA2L</label>
    </interactant>
    <organismsDiffer>false</organismsDiffer>
    <experiments>6</experiments>
</comment>
<comment type="interaction">
    <interactant intactId="EBI-466029">
        <id>P42858</id>
    </interactant>
    <interactant intactId="EBI-6166040">
        <id>P61009</id>
        <label>SPCS3</label>
    </interactant>
    <organismsDiffer>false</organismsDiffer>
    <experiments>6</experiments>
</comment>
<comment type="interaction">
    <interactant intactId="EBI-466029">
        <id>P42858</id>
    </interactant>
    <interactant intactId="EBI-2800992">
        <id>Q01892</id>
        <label>SPIB</label>
    </interactant>
    <organismsDiffer>false</organismsDiffer>
    <experiments>18</experiments>
</comment>
<comment type="interaction">
    <interactant intactId="EBI-466029">
        <id>P42858</id>
    </interactant>
    <interactant intactId="EBI-25953827">
        <id>Q1W4C9</id>
        <label>SPINK13</label>
    </interactant>
    <organismsDiffer>false</organismsDiffer>
    <experiments>3</experiments>
</comment>
<comment type="interaction">
    <interactant intactId="EBI-466029">
        <id>P42858</id>
    </interactant>
    <interactant intactId="EBI-10174456">
        <id>Q8N865</id>
        <label>SPMIP4</label>
    </interactant>
    <organismsDiffer>false</organismsDiffer>
    <experiments>3</experiments>
</comment>
<comment type="interaction">
    <interactant intactId="EBI-466029">
        <id>P42858</id>
    </interactant>
    <interactant intactId="EBI-7082156">
        <id>Q7Z698</id>
        <label>SPRED2</label>
    </interactant>
    <organismsDiffer>false</organismsDiffer>
    <experiments>6</experiments>
</comment>
<comment type="interaction">
    <interactant intactId="EBI-466029">
        <id>P42858</id>
    </interactant>
    <interactant intactId="EBI-307104">
        <id>Q13501</id>
        <label>SQSTM1</label>
    </interactant>
    <organismsDiffer>false</organismsDiffer>
    <experiments>11</experiments>
</comment>
<comment type="interaction">
    <interactant intactId="EBI-466029">
        <id>P42858</id>
    </interactant>
    <interactant intactId="EBI-948313">
        <id>P36956</id>
        <label>SREBF1</label>
    </interactant>
    <organismsDiffer>false</organismsDiffer>
    <experiments>3</experiments>
</comment>
<comment type="interaction">
    <interactant intactId="EBI-466029">
        <id>P42858</id>
    </interactant>
    <interactant intactId="EBI-2481729">
        <id>Q7Z6B7</id>
        <label>SRGAP1</label>
    </interactant>
    <organismsDiffer>false</organismsDiffer>
    <experiments>4</experiments>
</comment>
<comment type="interaction">
    <interactant intactId="EBI-466029">
        <id>P42858</id>
    </interactant>
    <interactant intactId="EBI-1051034">
        <id>O75044</id>
        <label>SRGAP2</label>
    </interactant>
    <organismsDiffer>false</organismsDiffer>
    <experiments>3</experiments>
</comment>
<comment type="interaction">
    <interactant intactId="EBI-466029">
        <id>P42858</id>
    </interactant>
    <interactant intactId="EBI-368166">
        <id>O43295</id>
        <label>SRGAP3</label>
    </interactant>
    <organismsDiffer>false</organismsDiffer>
    <experiments>4</experiments>
</comment>
<comment type="interaction">
    <interactant intactId="EBI-466029">
        <id>P42858</id>
    </interactant>
    <interactant intactId="EBI-18616594">
        <id>Q8IXS7</id>
        <label>SRGAP3</label>
    </interactant>
    <organismsDiffer>false</organismsDiffer>
    <experiments>3</experiments>
</comment>
<comment type="interaction">
    <interactant intactId="EBI-466029">
        <id>P42858</id>
    </interactant>
    <interactant intactId="EBI-712721">
        <id>Q9BXP5</id>
        <label>SRRT</label>
    </interactant>
    <organismsDiffer>false</organismsDiffer>
    <experiments>3</experiments>
</comment>
<comment type="interaction">
    <interactant intactId="EBI-466029">
        <id>P42858</id>
    </interactant>
    <interactant intactId="EBI-25866384">
        <id>Q9BXP5-3</id>
        <label>SRRT</label>
    </interactant>
    <organismsDiffer>false</organismsDiffer>
    <experiments>6</experiments>
</comment>
<comment type="interaction">
    <interactant intactId="EBI-466029">
        <id>P42858</id>
    </interactant>
    <interactant intactId="EBI-16701991">
        <id>Q9BXP5-4</id>
        <label>SRRT</label>
    </interactant>
    <organismsDiffer>false</organismsDiffer>
    <experiments>3</experiments>
</comment>
<comment type="interaction">
    <interactant intactId="EBI-466029">
        <id>P42858</id>
    </interactant>
    <interactant intactId="EBI-358037">
        <id>P05455</id>
        <label>SSB</label>
    </interactant>
    <organismsDiffer>false</organismsDiffer>
    <experiments>3</experiments>
</comment>
<comment type="interaction">
    <interactant intactId="EBI-466029">
        <id>P42858</id>
    </interactant>
    <interactant intactId="EBI-2515416">
        <id>Q9NP77</id>
        <label>SSU72</label>
    </interactant>
    <organismsDiffer>false</organismsDiffer>
    <experiments>3</experiments>
</comment>
<comment type="interaction">
    <interactant intactId="EBI-466029">
        <id>P42858</id>
    </interactant>
    <interactant intactId="EBI-357285">
        <id>P50502</id>
        <label>ST13</label>
    </interactant>
    <organismsDiffer>false</organismsDiffer>
    <experiments>13</experiments>
</comment>
<comment type="interaction">
    <interactant intactId="EBI-466029">
        <id>P42858</id>
    </interactant>
    <interactant intactId="EBI-373258">
        <id>O75886</id>
        <label>STAM2</label>
    </interactant>
    <organismsDiffer>false</organismsDiffer>
    <experiments>6</experiments>
</comment>
<comment type="interaction">
    <interactant intactId="EBI-466029">
        <id>P42858</id>
    </interactant>
    <interactant intactId="EBI-722932">
        <id>P49675</id>
        <label>STAR</label>
    </interactant>
    <organismsDiffer>false</organismsDiffer>
    <experiments>3</experiments>
</comment>
<comment type="interaction">
    <interactant intactId="EBI-466029">
        <id>P42858</id>
    </interactant>
    <interactant intactId="EBI-746930">
        <id>Q9H668</id>
        <label>STN1</label>
    </interactant>
    <organismsDiffer>false</organismsDiffer>
    <experiments>3</experiments>
</comment>
<comment type="interaction">
    <interactant intactId="EBI-466029">
        <id>P42858</id>
    </interactant>
    <interactant intactId="EBI-727414">
        <id>Q9Y3F4</id>
        <label>STRAP</label>
    </interactant>
    <organismsDiffer>false</organismsDiffer>
    <experiments>4</experiments>
</comment>
<comment type="interaction">
    <interactant intactId="EBI-466029">
        <id>P42858</id>
    </interactant>
    <interactant intactId="EBI-22013242">
        <id>A1L378</id>
        <label>STRC</label>
    </interactant>
    <organismsDiffer>false</organismsDiffer>
    <experiments>6</experiments>
</comment>
<comment type="interaction">
    <interactant intactId="EBI-466029">
        <id>P42858</id>
    </interactant>
    <interactant intactId="EBI-357085">
        <id>Q9UNE7</id>
        <label>STUB1</label>
    </interactant>
    <organismsDiffer>false</organismsDiffer>
    <experiments>12</experiments>
</comment>
<comment type="interaction">
    <interactant intactId="EBI-466029">
        <id>P42858</id>
    </interactant>
    <interactant intactId="EBI-9089968">
        <id>O14662-5</id>
        <label>STX16</label>
    </interactant>
    <organismsDiffer>false</organismsDiffer>
    <experiments>15</experiments>
</comment>
<comment type="interaction">
    <interactant intactId="EBI-466029">
        <id>P42858</id>
    </interactant>
    <interactant intactId="EBI-960169">
        <id>P61764</id>
        <label>STXBP1</label>
    </interactant>
    <organismsDiffer>false</organismsDiffer>
    <experiments>7</experiments>
</comment>
<comment type="interaction">
    <interactant intactId="EBI-466029">
        <id>P42858</id>
    </interactant>
    <interactant intactId="EBI-25831443">
        <id>Q9BR01-2</id>
        <label>SULT4A1</label>
    </interactant>
    <organismsDiffer>false</organismsDiffer>
    <experiments>15</experiments>
</comment>
<comment type="interaction">
    <interactant intactId="EBI-466029">
        <id>P42858</id>
    </interactant>
    <interactant intactId="EBI-723091">
        <id>Q8NBJ7</id>
        <label>SUMF2</label>
    </interactant>
    <organismsDiffer>false</organismsDiffer>
    <experiments>6</experiments>
</comment>
<comment type="interaction">
    <interactant intactId="EBI-466029">
        <id>P42858</id>
    </interactant>
    <interactant intactId="EBI-80140">
        <id>P63165</id>
        <label>SUMO1</label>
    </interactant>
    <organismsDiffer>false</organismsDiffer>
    <experiments>3</experiments>
</comment>
<comment type="interaction">
    <interactant intactId="EBI-466029">
        <id>P42858</id>
    </interactant>
    <interactant intactId="EBI-474067">
        <id>P55854</id>
        <label>SUMO3</label>
    </interactant>
    <organismsDiffer>false</organismsDiffer>
    <experiments>9</experiments>
</comment>
<comment type="interaction">
    <interactant intactId="EBI-466029">
        <id>P42858</id>
    </interactant>
    <interactant intactId="EBI-10283466">
        <id>A1L190</id>
        <label>SYCE3</label>
    </interactant>
    <organismsDiffer>false</organismsDiffer>
    <experiments>15</experiments>
</comment>
<comment type="interaction">
    <interactant intactId="EBI-466029">
        <id>P42858</id>
    </interactant>
    <interactant intactId="EBI-1051992">
        <id>Q92797</id>
        <label>SYMPK</label>
    </interactant>
    <organismsDiffer>false</organismsDiffer>
    <experiments>3</experiments>
</comment>
<comment type="interaction">
    <interactant intactId="EBI-466029">
        <id>P42858</id>
    </interactant>
    <interactant intactId="EBI-21560407">
        <id>Q92797-2</id>
        <label>SYMPK</label>
    </interactant>
    <organismsDiffer>false</organismsDiffer>
    <experiments>9</experiments>
</comment>
<comment type="interaction">
    <interactant intactId="EBI-466029">
        <id>P42858</id>
    </interactant>
    <interactant intactId="EBI-9071725">
        <id>P08247</id>
        <label>SYP</label>
    </interactant>
    <organismsDiffer>false</organismsDiffer>
    <experiments>13</experiments>
</comment>
<comment type="interaction">
    <interactant intactId="EBI-466029">
        <id>P42858</id>
    </interactant>
    <interactant intactId="EBI-13373352">
        <id>Q9BQS2-2</id>
        <label>SYT15</label>
    </interactant>
    <organismsDiffer>false</organismsDiffer>
    <experiments>3</experiments>
</comment>
<comment type="interaction">
    <interactant intactId="EBI-466029">
        <id>P42858</id>
    </interactant>
    <interactant intactId="EBI-8032987">
        <id>Q8N9I0</id>
        <label>SYT2</label>
    </interactant>
    <organismsDiffer>false</organismsDiffer>
    <experiments>10</experiments>
</comment>
<comment type="interaction">
    <interactant intactId="EBI-466029">
        <id>P42858</id>
    </interactant>
    <interactant intactId="EBI-17284568">
        <id>Q9BQG1</id>
        <label>SYT3</label>
    </interactant>
    <organismsDiffer>false</organismsDiffer>
    <experiments>12</experiments>
</comment>
<comment type="interaction">
    <interactant intactId="EBI-466029">
        <id>P42858</id>
    </interactant>
    <interactant intactId="EBI-10246152">
        <id>Q5T7P8-2</id>
        <label>SYT6</label>
    </interactant>
    <organismsDiffer>false</organismsDiffer>
    <experiments>3</experiments>
</comment>
<comment type="interaction">
    <interactant intactId="EBI-466029">
        <id>P42858</id>
    </interactant>
    <interactant intactId="EBI-624237">
        <id>O75410</id>
        <label>TACC1</label>
    </interactant>
    <organismsDiffer>false</organismsDiffer>
    <experiments>4</experiments>
</comment>
<comment type="interaction">
    <interactant intactId="EBI-466029">
        <id>P42858</id>
    </interactant>
    <interactant intactId="EBI-12007872">
        <id>O75410-7</id>
        <label>TACC1</label>
    </interactant>
    <organismsDiffer>false</organismsDiffer>
    <experiments>12</experiments>
</comment>
<comment type="interaction">
    <interactant intactId="EBI-466029">
        <id>P42858</id>
    </interactant>
    <interactant intactId="EBI-18173581">
        <id>Q86TJ2-3</id>
        <label>TADA2B</label>
    </interactant>
    <organismsDiffer>false</organismsDiffer>
    <experiments>3</experiments>
</comment>
<comment type="interaction">
    <interactant intactId="EBI-466029">
        <id>P42858</id>
    </interactant>
    <interactant intactId="EBI-1056740">
        <id>P37802</id>
        <label>TAGLN2</label>
    </interactant>
    <organismsDiffer>false</organismsDiffer>
    <experiments>3</experiments>
</comment>
<comment type="interaction">
    <interactant intactId="EBI-466029">
        <id>P42858</id>
    </interactant>
    <interactant intactId="EBI-1056712">
        <id>P37837</id>
        <label>TALDO1</label>
    </interactant>
    <organismsDiffer>false</organismsDiffer>
    <experiments>3</experiments>
</comment>
<comment type="interaction">
    <interactant intactId="EBI-466029">
        <id>P42858</id>
    </interactant>
    <interactant intactId="EBI-25948253">
        <id>Q6NW12</id>
        <label>TANK</label>
    </interactant>
    <organismsDiffer>false</organismsDiffer>
    <experiments>9</experiments>
</comment>
<comment type="interaction">
    <interactant intactId="EBI-466029">
        <id>P42858</id>
    </interactant>
    <interactant intactId="EBI-356349">
        <id>Q92844</id>
        <label>TANK</label>
    </interactant>
    <organismsDiffer>false</organismsDiffer>
    <experiments>3</experiments>
</comment>
<comment type="interaction">
    <interactant intactId="EBI-466029">
        <id>P42858</id>
    </interactant>
    <interactant intactId="EBI-25967460">
        <id>Q92844-3</id>
        <label>TANK</label>
    </interactant>
    <organismsDiffer>false</organismsDiffer>
    <experiments>3</experiments>
</comment>
<comment type="interaction">
    <interactant intactId="EBI-466029">
        <id>P42858</id>
    </interactant>
    <interactant intactId="EBI-1384100">
        <id>Q9H2K8</id>
        <label>TAOK3</label>
    </interactant>
    <organismsDiffer>false</organismsDiffer>
    <experiments>3</experiments>
</comment>
<comment type="interaction">
    <interactant intactId="EBI-466029">
        <id>P42858</id>
    </interactant>
    <interactant intactId="EBI-745958">
        <id>Q5VWN6</id>
        <label>TASOR2</label>
    </interactant>
    <organismsDiffer>false</organismsDiffer>
    <experiments>12</experiments>
</comment>
<comment type="interaction">
    <interactant intactId="EBI-466029">
        <id>P42858</id>
    </interactant>
    <interactant intactId="EBI-742381">
        <id>Q92609</id>
        <label>TBC1D5</label>
    </interactant>
    <organismsDiffer>false</organismsDiffer>
    <experiments>3</experiments>
</comment>
<comment type="interaction">
    <interactant intactId="EBI-466029">
        <id>P42858</id>
    </interactant>
    <interactant intactId="EBI-10239991">
        <id>Q32MN6</id>
        <label>TBP</label>
    </interactant>
    <organismsDiffer>false</organismsDiffer>
    <experiments>9</experiments>
</comment>
<comment type="interaction">
    <interactant intactId="EBI-466029">
        <id>P42858</id>
    </interactant>
    <interactant intactId="EBI-1047158">
        <id>Q16650</id>
        <label>TBR1</label>
    </interactant>
    <organismsDiffer>false</organismsDiffer>
    <experiments>12</experiments>
</comment>
<comment type="interaction">
    <interactant intactId="EBI-466029">
        <id>P42858</id>
    </interactant>
    <interactant intactId="EBI-6427217">
        <id>Q9Y458</id>
        <label>TBX22</label>
    </interactant>
    <organismsDiffer>false</organismsDiffer>
    <experiments>12</experiments>
</comment>
<comment type="interaction">
    <interactant intactId="EBI-466029">
        <id>P42858</id>
    </interactant>
    <interactant intactId="EBI-473271">
        <id>O14776</id>
        <label>TCERG1</label>
    </interactant>
    <organismsDiffer>false</organismsDiffer>
    <experiments>9</experiments>
</comment>
<comment type="interaction">
    <interactant intactId="EBI-466029">
        <id>P42858</id>
    </interactant>
    <interactant intactId="EBI-356553">
        <id>P17987</id>
        <label>TCP1</label>
    </interactant>
    <organismsDiffer>false</organismsDiffer>
    <experiments>3</experiments>
</comment>
<comment type="interaction">
    <interactant intactId="EBI-466029">
        <id>P42858</id>
    </interactant>
    <interactant intactId="EBI-3923210">
        <id>Q8TDR4</id>
        <label>TCP10L</label>
    </interactant>
    <organismsDiffer>false</organismsDiffer>
    <experiments>3</experiments>
</comment>
<comment type="interaction">
    <interactant intactId="EBI-466029">
        <id>P42858</id>
    </interactant>
    <interactant intactId="EBI-12151837">
        <id>P28347-2</id>
        <label>TEAD1</label>
    </interactant>
    <organismsDiffer>false</organismsDiffer>
    <experiments>18</experiments>
</comment>
<comment type="interaction">
    <interactant intactId="EBI-466029">
        <id>P42858</id>
    </interactant>
    <interactant intactId="EBI-2562799">
        <id>Q86WV5</id>
        <label>TEN1</label>
    </interactant>
    <organismsDiffer>false</organismsDiffer>
    <experiments>9</experiments>
</comment>
<comment type="interaction">
    <interactant intactId="EBI-466029">
        <id>P42858</id>
    </interactant>
    <interactant intactId="EBI-752030">
        <id>Q96A09</id>
        <label>TENT5B</label>
    </interactant>
    <organismsDiffer>false</organismsDiffer>
    <experiments>6</experiments>
</comment>
<comment type="interaction">
    <interactant intactId="EBI-466029">
        <id>P42858</id>
    </interactant>
    <interactant intactId="EBI-25840535">
        <id>Q15554-4</id>
        <label>TERF2</label>
    </interactant>
    <organismsDiffer>false</organismsDiffer>
    <experiments>15</experiments>
</comment>
<comment type="interaction">
    <interactant intactId="EBI-466029">
        <id>P42858</id>
    </interactant>
    <interactant intactId="EBI-25961624">
        <id>Q96M34</id>
        <label>TEX55</label>
    </interactant>
    <organismsDiffer>false</organismsDiffer>
    <experiments>3</experiments>
</comment>
<comment type="interaction">
    <interactant intactId="EBI-466029">
        <id>P42858</id>
    </interactant>
    <interactant intactId="EBI-4314702">
        <id>Q03403</id>
        <label>TFF2</label>
    </interactant>
    <organismsDiffer>false</organismsDiffer>
    <experiments>18</experiments>
</comment>
<comment type="interaction">
    <interactant intactId="EBI-466029">
        <id>P42858</id>
    </interactant>
    <interactant intactId="EBI-357061">
        <id>Q92734</id>
        <label>TFG</label>
    </interactant>
    <organismsDiffer>false</organismsDiffer>
    <experiments>3</experiments>
</comment>
<comment type="interaction">
    <interactant intactId="EBI-466029">
        <id>P42858</id>
    </interactant>
    <interactant intactId="EBI-1761487">
        <id>O95455</id>
        <label>TGDS</label>
    </interactant>
    <organismsDiffer>false</organismsDiffer>
    <experiments>3</experiments>
</comment>
<comment type="interaction">
    <interactant intactId="EBI-466029">
        <id>P42858</id>
    </interactant>
    <interactant intactId="EBI-296151">
        <id>P37173</id>
        <label>TGFBR2</label>
    </interactant>
    <organismsDiffer>false</organismsDiffer>
    <experiments>3</experiments>
</comment>
<comment type="interaction">
    <interactant intactId="EBI-466029">
        <id>P42858</id>
    </interactant>
    <interactant intactId="EBI-25842075">
        <id>P21980-2</id>
        <label>TGM2</label>
    </interactant>
    <organismsDiffer>false</organismsDiffer>
    <experiments>6</experiments>
</comment>
<comment type="interaction">
    <interactant intactId="EBI-466029">
        <id>P42858</id>
    </interactant>
    <interactant intactId="EBI-9091586">
        <id>Q96MW7</id>
        <label>TIGD1</label>
    </interactant>
    <organismsDiffer>false</organismsDiffer>
    <experiments>9</experiments>
</comment>
<comment type="interaction">
    <interactant intactId="EBI-466029">
        <id>P42858</id>
    </interactant>
    <interactant intactId="EBI-1049822">
        <id>O60220</id>
        <label>TIMM8A</label>
    </interactant>
    <organismsDiffer>false</organismsDiffer>
    <experiments>15</experiments>
</comment>
<comment type="interaction">
    <interactant intactId="EBI-466029">
        <id>P42858</id>
    </interactant>
    <interactant intactId="EBI-717810">
        <id>Q08117</id>
        <label>TLE5</label>
    </interactant>
    <organismsDiffer>false</organismsDiffer>
    <experiments>3</experiments>
</comment>
<comment type="interaction">
    <interactant intactId="EBI-466029">
        <id>P42858</id>
    </interactant>
    <interactant intactId="EBI-25852210">
        <id>Q9BZW5-2</id>
        <label>TM6SF1</label>
    </interactant>
    <organismsDiffer>false</organismsDiffer>
    <experiments>3</experiments>
</comment>
<comment type="interaction">
    <interactant intactId="EBI-466029">
        <id>P42858</id>
    </interactant>
    <interactant intactId="EBI-1045338">
        <id>Q96EY4</id>
        <label>TMA16</label>
    </interactant>
    <organismsDiffer>false</organismsDiffer>
    <experiments>3</experiments>
</comment>
<comment type="interaction">
    <interactant intactId="EBI-466029">
        <id>P42858</id>
    </interactant>
    <interactant intactId="EBI-10490807">
        <id>Q9NUM4</id>
        <label>TMEM106B</label>
    </interactant>
    <organismsDiffer>false</organismsDiffer>
    <experiments>3</experiments>
</comment>
<comment type="interaction">
    <interactant intactId="EBI-466029">
        <id>P42858</id>
    </interactant>
    <interactant intactId="EBI-8633987">
        <id>Q12893</id>
        <label>TMEM115</label>
    </interactant>
    <organismsDiffer>false</organismsDiffer>
    <experiments>3</experiments>
</comment>
<comment type="interaction">
    <interactant intactId="EBI-466029">
        <id>P42858</id>
    </interactant>
    <interactant intactId="EBI-6269551">
        <id>Q6UW68</id>
        <label>TMEM205</label>
    </interactant>
    <organismsDiffer>false</organismsDiffer>
    <experiments>3</experiments>
</comment>
<comment type="interaction">
    <interactant intactId="EBI-466029">
        <id>P42858</id>
    </interactant>
    <interactant intactId="EBI-11528917">
        <id>Q8WW34-2</id>
        <label>TMEM239</label>
    </interactant>
    <organismsDiffer>false</organismsDiffer>
    <experiments>3</experiments>
</comment>
<comment type="interaction">
    <interactant intactId="EBI-466029">
        <id>P42858</id>
    </interactant>
    <interactant intactId="EBI-12921610">
        <id>Q9NV96-2</id>
        <label>TMEM30A</label>
    </interactant>
    <organismsDiffer>false</organismsDiffer>
    <experiments>3</experiments>
</comment>
<comment type="interaction">
    <interactant intactId="EBI-466029">
        <id>P42858</id>
    </interactant>
    <interactant intactId="EBI-721293">
        <id>Q9BTV4</id>
        <label>TMEM43</label>
    </interactant>
    <organismsDiffer>false</organismsDiffer>
    <experiments>3</experiments>
</comment>
<comment type="interaction">
    <interactant intactId="EBI-466029">
        <id>P42858</id>
    </interactant>
    <interactant intactId="EBI-13370320">
        <id>Q9BQJ4</id>
        <label>TMEM47</label>
    </interactant>
    <organismsDiffer>false</organismsDiffer>
    <experiments>3</experiments>
</comment>
<comment type="interaction">
    <interactant intactId="EBI-466029">
        <id>P42858</id>
    </interactant>
    <interactant intactId="EBI-9089156">
        <id>Q8IUR5-4</id>
        <label>TMTC1</label>
    </interactant>
    <organismsDiffer>false</organismsDiffer>
    <experiments>6</experiments>
</comment>
<comment type="interaction">
    <interactant intactId="EBI-466029">
        <id>P42858</id>
    </interactant>
    <interactant intactId="EBI-25831574">
        <id>Q71RG4-4</id>
        <label>TMUB2</label>
    </interactant>
    <organismsDiffer>false</organismsDiffer>
    <experiments>6</experiments>
</comment>
<comment type="interaction">
    <interactant intactId="EBI-466029">
        <id>P42858</id>
    </interactant>
    <interactant intactId="EBI-2505861">
        <id>Q13829</id>
        <label>TNFAIP1</label>
    </interactant>
    <organismsDiffer>false</organismsDiffer>
    <experiments>3</experiments>
</comment>
<comment type="interaction">
    <interactant intactId="EBI-466029">
        <id>P42858</id>
    </interactant>
    <interactant intactId="EBI-15481185">
        <id>O00300</id>
        <label>TNFRSF11B</label>
    </interactant>
    <organismsDiffer>false</organismsDiffer>
    <experiments>3</experiments>
</comment>
<comment type="interaction">
    <interactant intactId="EBI-466029">
        <id>P42858</id>
    </interactant>
    <interactant intactId="EBI-16355546">
        <id>O95150</id>
        <label>TNFSF15</label>
    </interactant>
    <organismsDiffer>false</organismsDiffer>
    <experiments>3</experiments>
</comment>
<comment type="interaction">
    <interactant intactId="EBI-466029">
        <id>P42858</id>
    </interactant>
    <interactant intactId="EBI-2509913">
        <id>Q96KP6</id>
        <label>TNIP3</label>
    </interactant>
    <organismsDiffer>false</organismsDiffer>
    <experiments>9</experiments>
</comment>
<comment type="interaction">
    <interactant intactId="EBI-466029">
        <id>P42858</id>
    </interactant>
    <interactant intactId="EBI-20753895">
        <id>P22105-1</id>
        <label>TNXB</label>
    </interactant>
    <organismsDiffer>false</organismsDiffer>
    <experiments>3</experiments>
</comment>
<comment type="interaction">
    <interactant intactId="EBI-466029">
        <id>P42858</id>
    </interactant>
    <interactant intactId="EBI-1047508">
        <id>Q9NS69</id>
        <label>TOMM22</label>
    </interactant>
    <organismsDiffer>false</organismsDiffer>
    <experiments>6</experiments>
</comment>
<comment type="interaction">
    <interactant intactId="EBI-466029">
        <id>P42858</id>
    </interactant>
    <interactant intactId="EBI-366083">
        <id>P04637</id>
        <label>TP53</label>
    </interactant>
    <organismsDiffer>false</organismsDiffer>
    <experiments>19</experiments>
</comment>
<comment type="interaction">
    <interactant intactId="EBI-466029">
        <id>P42858</id>
    </interactant>
    <interactant intactId="EBI-717475">
        <id>P60174</id>
        <label>TPI1</label>
    </interactant>
    <organismsDiffer>false</organismsDiffer>
    <experiments>6</experiments>
</comment>
<comment type="interaction">
    <interactant intactId="EBI-466029">
        <id>P42858</id>
    </interactant>
    <interactant intactId="EBI-355744">
        <id>Q12933</id>
        <label>TRAF2</label>
    </interactant>
    <organismsDiffer>false</organismsDiffer>
    <experiments>3</experiments>
</comment>
<comment type="interaction">
    <interactant intactId="EBI-466029">
        <id>P42858</id>
    </interactant>
    <interactant intactId="EBI-1396921">
        <id>O14545</id>
        <label>TRAFD1</label>
    </interactant>
    <organismsDiffer>false</organismsDiffer>
    <experiments>5</experiments>
</comment>
<comment type="interaction">
    <interactant intactId="EBI-466029">
        <id>P42858</id>
    </interactant>
    <interactant intactId="EBI-81290">
        <id>P19474</id>
        <label>TRIM21</label>
    </interactant>
    <organismsDiffer>false</organismsDiffer>
    <experiments>21</experiments>
</comment>
<comment type="interaction">
    <interactant intactId="EBI-466029">
        <id>P42858</id>
    </interactant>
    <interactant intactId="EBI-17716262">
        <id>Q9UPQ4-2</id>
        <label>TRIM35</label>
    </interactant>
    <organismsDiffer>false</organismsDiffer>
    <experiments>9</experiments>
</comment>
<comment type="interaction">
    <interactant intactId="EBI-466029">
        <id>P42858</id>
    </interactant>
    <interactant intactId="EBI-6427421">
        <id>P0CI25</id>
        <label>TRIM49</label>
    </interactant>
    <organismsDiffer>false</organismsDiffer>
    <experiments>9</experiments>
</comment>
<comment type="interaction">
    <interactant intactId="EBI-466029">
        <id>P42858</id>
    </interactant>
    <interactant intactId="EBI-6550597">
        <id>Q15642-2</id>
        <label>TRIP10</label>
    </interactant>
    <organismsDiffer>false</organismsDiffer>
    <experiments>18</experiments>
</comment>
<comment type="interaction">
    <interactant intactId="EBI-466029">
        <id>P42858</id>
    </interactant>
    <interactant intactId="EBI-742327">
        <id>Q15654</id>
        <label>TRIP6</label>
    </interactant>
    <organismsDiffer>false</organismsDiffer>
    <experiments>3</experiments>
</comment>
<comment type="interaction">
    <interactant intactId="EBI-466029">
        <id>P42858</id>
    </interactant>
    <interactant intactId="EBI-742074">
        <id>Q99614</id>
        <label>TTC1</label>
    </interactant>
    <organismsDiffer>false</organismsDiffer>
    <experiments>9</experiments>
</comment>
<comment type="interaction">
    <interactant intactId="EBI-466029">
        <id>P42858</id>
    </interactant>
    <interactant intactId="EBI-948354">
        <id>Q6DKK2</id>
        <label>TTC19</label>
    </interactant>
    <organismsDiffer>false</organismsDiffer>
    <experiments>3</experiments>
</comment>
<comment type="interaction">
    <interactant intactId="EBI-466029">
        <id>P42858</id>
    </interactant>
    <interactant intactId="EBI-9090990">
        <id>Q5W5X9-3</id>
        <label>TTC23</label>
    </interactant>
    <organismsDiffer>false</organismsDiffer>
    <experiments>18</experiments>
</comment>
<comment type="interaction">
    <interactant intactId="EBI-466029">
        <id>P42858</id>
    </interactant>
    <interactant intactId="EBI-302552">
        <id>Q71U36</id>
        <label>TUBA1A</label>
    </interactant>
    <organismsDiffer>false</organismsDiffer>
    <experiments>3</experiments>
</comment>
<comment type="interaction">
    <interactant intactId="EBI-466029">
        <id>P42858</id>
    </interactant>
    <interactant intactId="EBI-350864">
        <id>P07437</id>
        <label>TUBB</label>
    </interactant>
    <organismsDiffer>false</organismsDiffer>
    <experiments>9</experiments>
</comment>
<comment type="interaction">
    <interactant intactId="EBI-466029">
        <id>P42858</id>
    </interactant>
    <interactant intactId="EBI-356735">
        <id>Q9BUF5</id>
        <label>TUBB6</label>
    </interactant>
    <organismsDiffer>false</organismsDiffer>
    <experiments>3</experiments>
</comment>
<comment type="interaction">
    <interactant intactId="EBI-466029">
        <id>P42858</id>
    </interactant>
    <interactant intactId="EBI-10964469">
        <id>Q9UGJ1-2</id>
        <label>TUBGCP4</label>
    </interactant>
    <organismsDiffer>false</organismsDiffer>
    <experiments>6</experiments>
</comment>
<comment type="interaction">
    <interactant intactId="EBI-466029">
        <id>P42858</id>
    </interactant>
    <interactant intactId="EBI-1797287">
        <id>Q15672</id>
        <label>TWIST1</label>
    </interactant>
    <organismsDiffer>false</organismsDiffer>
    <experiments>3</experiments>
</comment>
<comment type="interaction">
    <interactant intactId="EBI-466029">
        <id>P42858</id>
    </interactant>
    <interactant intactId="EBI-1797313">
        <id>Q8WVJ9</id>
        <label>TWIST2</label>
    </interactant>
    <organismsDiffer>false</organismsDiffer>
    <experiments>15</experiments>
</comment>
<comment type="interaction">
    <interactant intactId="EBI-466029">
        <id>P42858</id>
    </interactant>
    <interactant intactId="EBI-2932492">
        <id>Q99757</id>
        <label>TXN2</label>
    </interactant>
    <organismsDiffer>false</organismsDiffer>
    <experiments>3</experiments>
</comment>
<comment type="interaction">
    <interactant intactId="EBI-466029">
        <id>P42858</id>
    </interactant>
    <interactant intactId="EBI-749812">
        <id>Q6PKC3</id>
        <label>TXNDC11</label>
    </interactant>
    <organismsDiffer>false</organismsDiffer>
    <experiments>7</experiments>
</comment>
<comment type="interaction">
    <interactant intactId="EBI-466029">
        <id>P42858</id>
    </interactant>
    <interactant intactId="EBI-632461">
        <id>Q01081</id>
        <label>U2AF1</label>
    </interactant>
    <organismsDiffer>false</organismsDiffer>
    <experiments>3</experiments>
</comment>
<comment type="interaction">
    <interactant intactId="EBI-466029">
        <id>P42858</id>
    </interactant>
    <interactant intactId="EBI-709688">
        <id>P22314</id>
        <label>UBA1</label>
    </interactant>
    <organismsDiffer>false</organismsDiffer>
    <experiments>3</experiments>
</comment>
<comment type="interaction">
    <interactant intactId="EBI-466029">
        <id>P42858</id>
    </interactant>
    <interactant intactId="EBI-749370">
        <id>Q9BSL1</id>
        <label>UBAC1</label>
    </interactant>
    <organismsDiffer>false</organismsDiffer>
    <experiments>26</experiments>
</comment>
<comment type="interaction">
    <interactant intactId="EBI-466029">
        <id>P42858</id>
    </interactant>
    <interactant intactId="EBI-3390054">
        <id>P0CG48</id>
        <label>UBC</label>
    </interactant>
    <organismsDiffer>false</organismsDiffer>
    <experiments>3</experiments>
</comment>
<comment type="interaction">
    <interactant intactId="EBI-466029">
        <id>P42858</id>
    </interactant>
    <interactant intactId="EBI-745527">
        <id>Q9Y2X8</id>
        <label>UBE2D4</label>
    </interactant>
    <organismsDiffer>false</organismsDiffer>
    <experiments>3</experiments>
</comment>
<comment type="interaction">
    <interactant intactId="EBI-466029">
        <id>P42858</id>
    </interactant>
    <interactant intactId="EBI-2129909">
        <id>P62256</id>
        <label>UBE2H</label>
    </interactant>
    <organismsDiffer>false</organismsDiffer>
    <experiments>3</experiments>
</comment>
<comment type="interaction">
    <interactant intactId="EBI-466029">
        <id>P42858</id>
    </interactant>
    <interactant intactId="EBI-80168">
        <id>P63279</id>
        <label>UBE2I</label>
    </interactant>
    <organismsDiffer>false</organismsDiffer>
    <experiments>3</experiments>
</comment>
<comment type="interaction">
    <interactant intactId="EBI-466029">
        <id>P42858</id>
    </interactant>
    <interactant intactId="EBI-473850">
        <id>P61086</id>
        <label>UBE2K</label>
    </interactant>
    <organismsDiffer>false</organismsDiffer>
    <experiments>24</experiments>
</comment>
<comment type="interaction">
    <interactant intactId="EBI-466029">
        <id>P42858</id>
    </interactant>
    <interactant intactId="EBI-947187">
        <id>Q9UHD9</id>
        <label>UBQLN2</label>
    </interactant>
    <organismsDiffer>false</organismsDiffer>
    <experiments>12</experiments>
</comment>
<comment type="interaction">
    <interactant intactId="EBI-466029">
        <id>P42858</id>
    </interactant>
    <interactant intactId="EBI-1994090">
        <id>Q92890</id>
        <label>UFD1</label>
    </interactant>
    <organismsDiffer>false</organismsDiffer>
    <experiments>7</experiments>
</comment>
<comment type="interaction">
    <interactant intactId="EBI-466029">
        <id>P42858</id>
    </interactant>
    <interactant intactId="EBI-908831">
        <id>O75385</id>
        <label>ULK1</label>
    </interactant>
    <organismsDiffer>false</organismsDiffer>
    <experiments>8</experiments>
</comment>
<comment type="interaction">
    <interactant intactId="EBI-466029">
        <id>P42858</id>
    </interactant>
    <interactant intactId="EBI-8601749">
        <id>Q495M9</id>
        <label>USH1G</label>
    </interactant>
    <organismsDiffer>false</organismsDiffer>
    <experiments>3</experiments>
</comment>
<comment type="interaction">
    <interactant intactId="EBI-466029">
        <id>P42858</id>
    </interactant>
    <interactant intactId="EBI-356206">
        <id>Q9UMW8</id>
        <label>USP18</label>
    </interactant>
    <organismsDiffer>false</organismsDiffer>
    <experiments>3</experiments>
</comment>
<comment type="interaction">
    <interactant intactId="EBI-466029">
        <id>P42858</id>
    </interactant>
    <interactant intactId="EBI-10696113">
        <id>O75604-3</id>
        <label>USP2</label>
    </interactant>
    <organismsDiffer>false</organismsDiffer>
    <experiments>6</experiments>
</comment>
<comment type="interaction">
    <interactant intactId="EBI-466029">
        <id>P42858</id>
    </interactant>
    <interactant intactId="EBI-1642365">
        <id>Q9UPU5</id>
        <label>USP24</label>
    </interactant>
    <organismsDiffer>false</organismsDiffer>
    <experiments>21</experiments>
</comment>
<comment type="interaction">
    <interactant intactId="EBI-466029">
        <id>P42858</id>
    </interactant>
    <interactant intactId="EBI-12220239">
        <id>Q8NFA0-2</id>
        <label>USP32</label>
    </interactant>
    <organismsDiffer>false</organismsDiffer>
    <experiments>18</experiments>
</comment>
<comment type="interaction">
    <interactant intactId="EBI-466029">
        <id>P42858</id>
    </interactant>
    <interactant intactId="EBI-302524">
        <id>Q93008</id>
        <label>USP9X</label>
    </interactant>
    <organismsDiffer>false</organismsDiffer>
    <experiments>8</experiments>
</comment>
<comment type="interaction">
    <interactant intactId="EBI-466029">
        <id>P42858</id>
    </interactant>
    <interactant intactId="EBI-473284">
        <id>Q9BVJ6</id>
        <label>UTP14A</label>
    </interactant>
    <organismsDiffer>false</organismsDiffer>
    <experiments>4</experiments>
</comment>
<comment type="interaction">
    <interactant intactId="EBI-466029">
        <id>P42858</id>
    </interactant>
    <interactant intactId="EBI-749211">
        <id>Q9NYH9</id>
        <label>UTP6</label>
    </interactant>
    <organismsDiffer>false</organismsDiffer>
    <experiments>3</experiments>
</comment>
<comment type="interaction">
    <interactant intactId="EBI-466029">
        <id>P42858</id>
    </interactant>
    <interactant intactId="EBI-2107455">
        <id>Q08AM6</id>
        <label>VAC14</label>
    </interactant>
    <organismsDiffer>false</organismsDiffer>
    <experiments>3</experiments>
</comment>
<comment type="interaction">
    <interactant intactId="EBI-466029">
        <id>P42858</id>
    </interactant>
    <interactant intactId="EBI-10234766">
        <id>Q9HCJ6</id>
        <label>VAT1L</label>
    </interactant>
    <organismsDiffer>false</organismsDiffer>
    <experiments>3</experiments>
</comment>
<comment type="interaction">
    <interactant intactId="EBI-466029">
        <id>P42858</id>
    </interactant>
    <interactant intactId="EBI-355164">
        <id>P55072</id>
        <label>VCP</label>
    </interactant>
    <organismsDiffer>false</organismsDiffer>
    <experiments>10</experiments>
</comment>
<comment type="interaction">
    <interactant intactId="EBI-466029">
        <id>P42858</id>
    </interactant>
    <interactant intactId="EBI-354022">
        <id>P45880</id>
        <label>VDAC2</label>
    </interactant>
    <organismsDiffer>false</organismsDiffer>
    <experiments>22</experiments>
</comment>
<comment type="interaction">
    <interactant intactId="EBI-466029">
        <id>P42858</id>
    </interactant>
    <interactant intactId="EBI-12157263">
        <id>P40337-2</id>
        <label>VHL</label>
    </interactant>
    <organismsDiffer>false</organismsDiffer>
    <experiments>12</experiments>
</comment>
<comment type="interaction">
    <interactant intactId="EBI-466029">
        <id>P42858</id>
    </interactant>
    <interactant intactId="EBI-25958818">
        <id>P09327-2</id>
        <label>VIL1</label>
    </interactant>
    <organismsDiffer>false</organismsDiffer>
    <experiments>3</experiments>
</comment>
<comment type="interaction">
    <interactant intactId="EBI-466029">
        <id>P42858</id>
    </interactant>
    <interactant intactId="EBI-353844">
        <id>P08670</id>
        <label>VIM</label>
    </interactant>
    <organismsDiffer>false</organismsDiffer>
    <experiments>4</experiments>
</comment>
<comment type="interaction">
    <interactant intactId="EBI-466029">
        <id>P42858</id>
    </interactant>
    <interactant intactId="EBI-727424">
        <id>Q9UK41</id>
        <label>VPS28</label>
    </interactant>
    <organismsDiffer>false</organismsDiffer>
    <experiments>16</experiments>
</comment>
<comment type="interaction">
    <interactant intactId="EBI-466029">
        <id>P42858</id>
    </interactant>
    <interactant intactId="EBI-2850578">
        <id>Q8NEZ2</id>
        <label>VPS37A</label>
    </interactant>
    <organismsDiffer>false</organismsDiffer>
    <experiments>6</experiments>
</comment>
<comment type="interaction">
    <interactant intactId="EBI-466029">
        <id>P42858</id>
    </interactant>
    <interactant intactId="EBI-2514459">
        <id>O75351</id>
        <label>VPS4B</label>
    </interactant>
    <organismsDiffer>false</organismsDiffer>
    <experiments>3</experiments>
</comment>
<comment type="interaction">
    <interactant intactId="EBI-466029">
        <id>P42858</id>
    </interactant>
    <interactant intactId="EBI-749118">
        <id>Q9BTA9</id>
        <label>WAC</label>
    </interactant>
    <organismsDiffer>false</organismsDiffer>
    <experiments>5</experiments>
</comment>
<comment type="interaction">
    <interactant intactId="EBI-466029">
        <id>P42858</id>
    </interactant>
    <interactant intactId="EBI-25956668">
        <id>Q9BTA9-5</id>
        <label>WAC</label>
    </interactant>
    <organismsDiffer>false</organismsDiffer>
    <experiments>3</experiments>
</comment>
<comment type="interaction">
    <interactant intactId="EBI-466029">
        <id>P42858</id>
    </interactant>
    <interactant intactId="EBI-7251981">
        <id>O75554</id>
        <label>WBP4</label>
    </interactant>
    <organismsDiffer>false</organismsDiffer>
    <experiments>3</experiments>
</comment>
<comment type="interaction">
    <interactant intactId="EBI-466029">
        <id>P42858</id>
    </interactant>
    <interactant intactId="EBI-1569256">
        <id>Q8IZQ1</id>
        <label>WDFY3</label>
    </interactant>
    <organismsDiffer>false</organismsDiffer>
    <experiments>10</experiments>
</comment>
<comment type="interaction">
    <interactant intactId="EBI-466029">
        <id>P42858</id>
    </interactant>
    <interactant intactId="EBI-718046">
        <id>A4D1P6</id>
        <label>WDR91</label>
    </interactant>
    <organismsDiffer>false</organismsDiffer>
    <experiments>16</experiments>
</comment>
<comment type="interaction">
    <interactant intactId="EBI-466029">
        <id>P42858</id>
    </interactant>
    <interactant intactId="EBI-25840023">
        <id>Q15007-2</id>
        <label>WTAP</label>
    </interactant>
    <organismsDiffer>false</organismsDiffer>
    <experiments>3</experiments>
</comment>
<comment type="interaction">
    <interactant intactId="EBI-466029">
        <id>P42858</id>
    </interactant>
    <interactant intactId="EBI-743923">
        <id>O00308</id>
        <label>WWP2</label>
    </interactant>
    <organismsDiffer>false</organismsDiffer>
    <experiments>9</experiments>
</comment>
<comment type="interaction">
    <interactant intactId="EBI-466029">
        <id>P42858</id>
    </interactant>
    <interactant intactId="EBI-295232">
        <id>Q9HCS7</id>
        <label>XAB2</label>
    </interactant>
    <organismsDiffer>false</organismsDiffer>
    <experiments>3</experiments>
</comment>
<comment type="interaction">
    <interactant intactId="EBI-466029">
        <id>P42858</id>
    </interactant>
    <interactant intactId="EBI-6448284">
        <id>Q8WTP9</id>
        <label>XAGE3</label>
    </interactant>
    <organismsDiffer>false</organismsDiffer>
    <experiments>3</experiments>
</comment>
<comment type="interaction">
    <interactant intactId="EBI-466029">
        <id>P42858</id>
    </interactant>
    <interactant intactId="EBI-353208">
        <id>P12956</id>
        <label>XRCC6</label>
    </interactant>
    <organismsDiffer>false</organismsDiffer>
    <experiments>21</experiments>
</comment>
<comment type="interaction">
    <interactant intactId="EBI-466029">
        <id>P42858</id>
    </interactant>
    <interactant intactId="EBI-2799703">
        <id>O95070</id>
        <label>YIF1A</label>
    </interactant>
    <organismsDiffer>false</organismsDiffer>
    <experiments>12</experiments>
</comment>
<comment type="interaction">
    <interactant intactId="EBI-466029">
        <id>P42858</id>
    </interactant>
    <interactant intactId="EBI-359815">
        <id>P31946</id>
        <label>YWHAB</label>
    </interactant>
    <organismsDiffer>false</organismsDiffer>
    <experiments>11</experiments>
</comment>
<comment type="interaction">
    <interactant intactId="EBI-466029">
        <id>P42858</id>
    </interactant>
    <interactant intactId="EBI-12150045">
        <id>Q9H869-2</id>
        <label>YY1AP1</label>
    </interactant>
    <organismsDiffer>false</organismsDiffer>
    <experiments>3</experiments>
</comment>
<comment type="interaction">
    <interactant intactId="EBI-466029">
        <id>P42858</id>
    </interactant>
    <interactant intactId="EBI-6264672">
        <id>Q9H171</id>
        <label>ZBP1</label>
    </interactant>
    <organismsDiffer>false</organismsDiffer>
    <experiments>6</experiments>
</comment>
<comment type="interaction">
    <interactant intactId="EBI-466029">
        <id>P42858</id>
    </interactant>
    <interactant intactId="EBI-711925">
        <id>Q05516</id>
        <label>ZBTB16</label>
    </interactant>
    <organismsDiffer>false</organismsDiffer>
    <experiments>4</experiments>
</comment>
<comment type="interaction">
    <interactant intactId="EBI-466029">
        <id>P42858</id>
    </interactant>
    <interactant intactId="EBI-25842419">
        <id>O43167-2</id>
        <label>ZBTB24</label>
    </interactant>
    <organismsDiffer>false</organismsDiffer>
    <experiments>9</experiments>
</comment>
<comment type="interaction">
    <interactant intactId="EBI-466029">
        <id>P42858</id>
    </interactant>
    <interactant intactId="EBI-14104088">
        <id>Q53FD0-2</id>
        <label>ZC2HC1C</label>
    </interactant>
    <organismsDiffer>false</organismsDiffer>
    <experiments>3</experiments>
</comment>
<comment type="interaction">
    <interactant intactId="EBI-466029">
        <id>P42858</id>
    </interactant>
    <interactant intactId="EBI-748373">
        <id>Q6PEW1</id>
        <label>ZCCHC12</label>
    </interactant>
    <organismsDiffer>false</organismsDiffer>
    <experiments>3</experiments>
</comment>
<comment type="interaction">
    <interactant intactId="EBI-466029">
        <id>P42858</id>
    </interactant>
    <interactant intactId="EBI-524753">
        <id>Q8IUH5</id>
        <label>ZDHHC17</label>
    </interactant>
    <organismsDiffer>false</organismsDiffer>
    <experiments>30</experiments>
</comment>
<comment type="interaction">
    <interactant intactId="EBI-466029">
        <id>P42858</id>
    </interactant>
    <interactant intactId="EBI-25961277">
        <id>Q8WVZ1-3</id>
        <label>ZDHHC19</label>
    </interactant>
    <organismsDiffer>false</organismsDiffer>
    <experiments>3</experiments>
</comment>
<comment type="interaction">
    <interactant intactId="EBI-466029">
        <id>P42858</id>
    </interactant>
    <interactant intactId="EBI-6448783">
        <id>G3V1X1</id>
        <label>ZFC3H1</label>
    </interactant>
    <organismsDiffer>false</organismsDiffer>
    <experiments>5</experiments>
</comment>
<comment type="interaction">
    <interactant intactId="EBI-466029">
        <id>P42858</id>
    </interactant>
    <interactant intactId="EBI-7236323">
        <id>Q6ZN57</id>
        <label>ZFP2</label>
    </interactant>
    <organismsDiffer>false</organismsDiffer>
    <experiments>12</experiments>
</comment>
<comment type="interaction">
    <interactant intactId="EBI-466029">
        <id>P42858</id>
    </interactant>
    <interactant intactId="EBI-6448240">
        <id>Q96K21</id>
        <label>ZFYVE19</label>
    </interactant>
    <organismsDiffer>false</organismsDiffer>
    <experiments>21</experiments>
</comment>
<comment type="interaction">
    <interactant intactId="EBI-466029">
        <id>P42858</id>
    </interactant>
    <interactant intactId="EBI-347767">
        <id>Q9UKY1</id>
        <label>ZHX1</label>
    </interactant>
    <organismsDiffer>false</organismsDiffer>
    <experiments>6</experiments>
</comment>
<comment type="interaction">
    <interactant intactId="EBI-466029">
        <id>P42858</id>
    </interactant>
    <interactant intactId="EBI-25830993">
        <id>Q96EF9</id>
        <label>ZHX1-C8orf76</label>
    </interactant>
    <organismsDiffer>false</organismsDiffer>
    <experiments>18</experiments>
</comment>
<comment type="interaction">
    <interactant intactId="EBI-466029">
        <id>P42858</id>
    </interactant>
    <interactant intactId="EBI-1965777">
        <id>Q9BRR0</id>
        <label>ZKSCAN3</label>
    </interactant>
    <organismsDiffer>false</organismsDiffer>
    <experiments>3</experiments>
</comment>
<comment type="interaction">
    <interactant intactId="EBI-466029">
        <id>P42858</id>
    </interactant>
    <interactant intactId="EBI-2602314">
        <id>Q15776</id>
        <label>ZKSCAN8</label>
    </interactant>
    <organismsDiffer>false</organismsDiffer>
    <experiments>9</experiments>
</comment>
<comment type="interaction">
    <interactant intactId="EBI-466029">
        <id>P42858</id>
    </interactant>
    <interactant intactId="EBI-2682299">
        <id>Q96NC0</id>
        <label>ZMAT2</label>
    </interactant>
    <organismsDiffer>false</organismsDiffer>
    <experiments>20</experiments>
</comment>
<comment type="interaction">
    <interactant intactId="EBI-466029">
        <id>P42858</id>
    </interactant>
    <interactant intactId="EBI-12949277">
        <id>O95789-4</id>
        <label>ZMYM6</label>
    </interactant>
    <organismsDiffer>false</organismsDiffer>
    <experiments>3</experiments>
</comment>
<comment type="interaction">
    <interactant intactId="EBI-466029">
        <id>P42858</id>
    </interactant>
    <interactant intactId="EBI-10746567">
        <id>P52744</id>
        <label>ZNF138</label>
    </interactant>
    <organismsDiffer>false</organismsDiffer>
    <experiments>9</experiments>
</comment>
<comment type="interaction">
    <interactant intactId="EBI-466029">
        <id>P42858</id>
    </interactant>
    <interactant intactId="EBI-12055755">
        <id>Q9UJW8-4</id>
        <label>ZNF180</label>
    </interactant>
    <organismsDiffer>false</organismsDiffer>
    <experiments>9</experiments>
</comment>
<comment type="interaction">
    <interactant intactId="EBI-466029">
        <id>P42858</id>
    </interactant>
    <interactant intactId="EBI-12884200">
        <id>P17023</id>
        <label>ZNF19</label>
    </interactant>
    <organismsDiffer>false</organismsDiffer>
    <experiments>3</experiments>
</comment>
<comment type="interaction">
    <interactant intactId="EBI-466029">
        <id>P42858</id>
    </interactant>
    <interactant intactId="EBI-8489229">
        <id>Q9BSG1</id>
        <label>ZNF2</label>
    </interactant>
    <organismsDiffer>false</organismsDiffer>
    <experiments>3</experiments>
</comment>
<comment type="interaction">
    <interactant intactId="EBI-466029">
        <id>P42858</id>
    </interactant>
    <interactant intactId="EBI-396200">
        <id>Q9Y2X9</id>
        <label>ZNF281</label>
    </interactant>
    <organismsDiffer>false</organismsDiffer>
    <experiments>3</experiments>
</comment>
<comment type="interaction">
    <interactant intactId="EBI-466029">
        <id>P42858</id>
    </interactant>
    <interactant intactId="EBI-10754950">
        <id>Q9HBT8</id>
        <label>ZNF286A</label>
    </interactant>
    <organismsDiffer>false</organismsDiffer>
    <experiments>9</experiments>
</comment>
<comment type="interaction">
    <interactant intactId="EBI-466029">
        <id>P42858</id>
    </interactant>
    <interactant intactId="EBI-12988373">
        <id>Q9NR11-2</id>
        <label>ZNF302</label>
    </interactant>
    <organismsDiffer>false</organismsDiffer>
    <experiments>3</experiments>
</comment>
<comment type="interaction">
    <interactant intactId="EBI-466029">
        <id>P42858</id>
    </interactant>
    <interactant intactId="EBI-2813661">
        <id>Q8N895</id>
        <label>ZNF366</label>
    </interactant>
    <organismsDiffer>false</organismsDiffer>
    <experiments>15</experiments>
</comment>
<comment type="interaction">
    <interactant intactId="EBI-466029">
        <id>P42858</id>
    </interactant>
    <interactant intactId="EBI-8489702">
        <id>Q9C0F3</id>
        <label>ZNF436</label>
    </interactant>
    <organismsDiffer>false</organismsDiffer>
    <experiments>15</experiments>
</comment>
<comment type="interaction">
    <interactant intactId="EBI-466029">
        <id>P42858</id>
    </interactant>
    <interactant intactId="EBI-12010736">
        <id>Q8N0Y2-2</id>
        <label>ZNF444</label>
    </interactant>
    <organismsDiffer>false</organismsDiffer>
    <experiments>9</experiments>
</comment>
<comment type="interaction">
    <interactant intactId="EBI-466029">
        <id>P42858</id>
    </interactant>
    <interactant intactId="EBI-10486136">
        <id>Q6ZNH5</id>
        <label>ZNF497</label>
    </interactant>
    <organismsDiffer>false</organismsDiffer>
    <experiments>9</experiments>
</comment>
<comment type="interaction">
    <interactant intactId="EBI-466029">
        <id>P42858</id>
    </interactant>
    <interactant intactId="EBI-18234077">
        <id>O60304</id>
        <label>ZNF500</label>
    </interactant>
    <organismsDiffer>false</organismsDiffer>
    <experiments>6</experiments>
</comment>
<comment type="interaction">
    <interactant intactId="EBI-466029">
        <id>P42858</id>
    </interactant>
    <interactant intactId="EBI-10699005">
        <id>Q8N988-2</id>
        <label>ZNF557</label>
    </interactant>
    <organismsDiffer>false</organismsDiffer>
    <experiments>12</experiments>
</comment>
<comment type="interaction">
    <interactant intactId="EBI-466029">
        <id>P42858</id>
    </interactant>
    <interactant intactId="EBI-8490788">
        <id>Q68EA5</id>
        <label>ZNF57</label>
    </interactant>
    <organismsDiffer>false</organismsDiffer>
    <experiments>15</experiments>
</comment>
<comment type="interaction">
    <interactant intactId="EBI-466029">
        <id>P42858</id>
    </interactant>
    <interactant intactId="EBI-10172590">
        <id>Q7Z3I7</id>
        <label>ZNF572</label>
    </interactant>
    <organismsDiffer>false</organismsDiffer>
    <experiments>9</experiments>
</comment>
<comment type="interaction">
    <interactant intactId="EBI-466029">
        <id>P42858</id>
    </interactant>
    <interactant intactId="EBI-12939666">
        <id>Q96N77-2</id>
        <label>ZNF641</label>
    </interactant>
    <organismsDiffer>false</organismsDiffer>
    <experiments>18</experiments>
</comment>
<comment type="interaction">
    <interactant intactId="EBI-466029">
        <id>P42858</id>
    </interactant>
    <interactant intactId="EBI-625509">
        <id>Q8N720</id>
        <label>ZNF655</label>
    </interactant>
    <organismsDiffer>false</organismsDiffer>
    <experiments>14</experiments>
</comment>
<comment type="interaction">
    <interactant intactId="EBI-466029">
        <id>P42858</id>
    </interactant>
    <interactant intactId="EBI-25845217">
        <id>Q5TEC3</id>
        <label>ZNF697</label>
    </interactant>
    <organismsDiffer>false</organismsDiffer>
    <experiments>3</experiments>
</comment>
<comment type="interaction">
    <interactant intactId="EBI-466029">
        <id>P42858</id>
    </interactant>
    <interactant intactId="EBI-18036029">
        <id>Q3KNS6-3</id>
        <label>ZNF829</label>
    </interactant>
    <organismsDiffer>false</organismsDiffer>
    <experiments>6</experiments>
</comment>
<comment type="interaction">
    <interactant intactId="EBI-466029">
        <id>P42858</id>
    </interactant>
    <interactant intactId="EBI-723434">
        <id>Q5JTY5</id>
        <label>ZNG1C</label>
    </interactant>
    <organismsDiffer>false</organismsDiffer>
    <experiments>6</experiments>
</comment>
<comment type="interaction">
    <interactant intactId="EBI-466029">
        <id>P42858</id>
    </interactant>
    <interactant intactId="EBI-751531">
        <id>O15535</id>
        <label>ZSCAN9</label>
    </interactant>
    <organismsDiffer>false</organismsDiffer>
    <experiments>9</experiments>
</comment>
<comment type="interaction">
    <interactant intactId="EBI-466029">
        <id>P42858</id>
    </interactant>
    <interactant intactId="EBI-1538838">
        <id>Q2QGD7</id>
        <label>ZXDC</label>
    </interactant>
    <organismsDiffer>false</organismsDiffer>
    <experiments>3</experiments>
</comment>
<comment type="interaction">
    <interactant intactId="EBI-466029">
        <id>P42858</id>
    </interactant>
    <interactant intactId="EBI-10174314">
        <id>A8K3Q9</id>
    </interactant>
    <organismsDiffer>false</organismsDiffer>
    <experiments>3</experiments>
</comment>
<comment type="interaction">
    <interactant intactId="EBI-466029">
        <id>P42858</id>
    </interactant>
    <interactant intactId="EBI-25831303">
        <id>A8K878</id>
    </interactant>
    <organismsDiffer>false</organismsDiffer>
    <experiments>21</experiments>
</comment>
<comment type="interaction">
    <interactant intactId="EBI-466029">
        <id>P42858</id>
    </interactant>
    <interactant intactId="EBI-25831617">
        <id>B7Z3E8</id>
    </interactant>
    <organismsDiffer>false</organismsDiffer>
    <experiments>6</experiments>
</comment>
<comment type="interaction">
    <interactant intactId="EBI-466029">
        <id>P42858</id>
    </interactant>
    <interactant intactId="EBI-25953074">
        <id>Q0VG73</id>
    </interactant>
    <organismsDiffer>false</organismsDiffer>
    <experiments>6</experiments>
</comment>
<comment type="interaction">
    <interactant intactId="EBI-466029">
        <id>P42858</id>
    </interactant>
    <interactant intactId="EBI-25831943">
        <id>Q7L8T7</id>
    </interactant>
    <organismsDiffer>false</organismsDiffer>
    <experiments>6</experiments>
</comment>
<comment type="interaction">
    <interactant intactId="EBI-466029">
        <id>P42858</id>
    </interactant>
    <interactant intactId="EBI-10259496">
        <id>Q86V28</id>
    </interactant>
    <organismsDiffer>false</organismsDiffer>
    <experiments>6</experiments>
</comment>
<comment type="interaction">
    <interactant intactId="EBI-466029">
        <id>P42858</id>
    </interactant>
    <interactant intactId="EBI-10295632">
        <id>Q96IQ6</id>
    </interactant>
    <organismsDiffer>false</organismsDiffer>
    <experiments>6</experiments>
</comment>
<comment type="interaction">
    <interactant intactId="EBI-466029">
        <id>P42858</id>
    </interactant>
    <interactant intactId="EBI-492834">
        <id>O88485</id>
        <label>Dync1i1</label>
    </interactant>
    <organismsDiffer>true</organismsDiffer>
    <experiments>2</experiments>
</comment>
<comment type="interaction">
    <interactant intactId="EBI-466029">
        <id>P42858</id>
    </interactant>
    <interactant intactId="EBI-994539">
        <id>P54256</id>
        <label>Hap1</label>
    </interactant>
    <organismsDiffer>true</organismsDiffer>
    <experiments>3</experiments>
</comment>
<comment type="interaction">
    <interactant intactId="EBI-466029">
        <id>P42858</id>
    </interactant>
    <interactant intactId="EBI-8328056">
        <id>P51660</id>
        <label>Hsd17b4</label>
    </interactant>
    <organismsDiffer>true</organismsDiffer>
    <experiments>15</experiments>
</comment>
<comment type="interaction">
    <interactant intactId="EBI-466029">
        <id>P42858</id>
    </interactant>
    <interactant intactId="EBI-8614640">
        <id>P29994</id>
        <label>Itpr1</label>
    </interactant>
    <organismsDiffer>true</organismsDiffer>
    <experiments>2</experiments>
</comment>
<comment type="interaction">
    <interactant intactId="EBI-466029">
        <id>P42858</id>
    </interactant>
    <interactant intactId="EBI-6455001">
        <id>Q99KR7</id>
        <label>Ppif</label>
    </interactant>
    <organismsDiffer>true</organismsDiffer>
    <experiments>3</experiments>
</comment>
<comment type="subcellular location">
    <molecule>Huntingtin</molecule>
    <subcellularLocation>
        <location evidence="9 11 25">Cytoplasm</location>
    </subcellularLocation>
    <subcellularLocation>
        <location evidence="9 10">Nucleus</location>
    </subcellularLocation>
    <subcellularLocation>
        <location evidence="11">Early endosome</location>
    </subcellularLocation>
    <text evidence="9 11">The mutant Huntingtin protein colocalizes with AKAP8L in the nuclear matrix of Huntington disease neurons. Shuttles between cytoplasm and nucleus in a Ran GTPase-independent manner (PubMed:15654337). Recruits onto early endosomes in a Rab5- and HAP40-dependent fashion (PubMed:16476778).</text>
</comment>
<comment type="subcellular location">
    <molecule>Huntingtin, myristoylated N-terminal fragment</molecule>
    <subcellularLocation>
        <location evidence="17">Cytoplasmic vesicle</location>
        <location evidence="17">Autophagosome</location>
    </subcellularLocation>
</comment>
<comment type="tissue specificity">
    <text evidence="10">Expressed in the brain cortex (at protein level). Widely expressed with the highest level of expression in the brain (nerve fibers, varicosities, and nerve endings). In the brain, the regions where it can be mainly found are the cerebellar cortex, the neocortex, the striatum, and the hippocampal formation.</text>
</comment>
<comment type="domain">
    <text evidence="15">The N-terminal Gln-rich and Pro-rich domain has great conformational flexibility and is likely to exist in a fluctuating equilibrium of alpha-helical, random coil, and extended conformations.</text>
</comment>
<comment type="PTM">
    <molecule>Huntingtin</molecule>
    <text evidence="6 24 28 29">Cleaved by caspases downstream of the polyglutamine stretch (PubMed:10770929, PubMed:29802276, PubMed:8696339, PubMed:9535906). The resulting N-terminal fragments are cytotoxic and provokes apoptosis (PubMed:10770929).</text>
</comment>
<comment type="PTM">
    <molecule>Huntingtin</molecule>
    <text evidence="12">Forms with expanded polyglutamine expansion are specifically ubiquitinated by SYVN1, which promotes their proteasomal degradation.</text>
</comment>
<comment type="PTM">
    <molecule>Huntingtin</molecule>
    <text evidence="13">Phosphorylation at Ser-1179 and Ser-1199 by CDK5 in response to DNA damage in nuclei of neurons protects neurons against polyglutamine expansion as well as DNA damage mediated toxicity.</text>
</comment>
<comment type="PTM">
    <molecule>Huntingtin, myristoylated N-terminal fragment</molecule>
    <text evidence="17 24">Myristoylated at Gly-551, following proteolytic cleavage at Asp-550.</text>
</comment>
<comment type="polymorphism">
    <text evidence="28">The poly-Gln region of HTT is highly polymorphic (10 to 35 repeats) in the normal population and is expanded to about 36-120 repeats in Huntington disease patients. The repeat length usually increases in successive generations, but also contracts on occasion. The adjacent poly-Pro region is also polymorphic and varies between 7-12 residues. Polyglutamine expansion leads to elevated susceptibility to apopain cleavage and likely result in accelerated neuronal apoptosis (PubMed:8696339).</text>
</comment>
<comment type="disease" evidence="27">
    <disease id="DI-01754">
        <name>Huntington disease</name>
        <acronym>HD</acronym>
        <description>A neurodegenerative disorder characterized by involuntary movements (chorea), general motor impairment, psychiatric disorders and dementia. Onset of the disease occurs usually in the third or fourth decade of life. Onset and clinical course depend on the degree of poly-Gln repeat expansion, longer expansions resulting in earlier onset and more severe clinical manifestations. Neuropathology of Huntington disease displays a distinctive pattern with loss of neurons, especially in the caudate and putamen.</description>
        <dbReference type="MIM" id="143100"/>
    </disease>
    <text>The disease is caused by variants affecting the gene represented in this entry.</text>
</comment>
<comment type="disease" evidence="19 20">
    <disease id="DI-04988">
        <name>Lopes-Maciel-Rodan syndrome</name>
        <acronym>LOMARS</acronym>
        <description>An autosomal recessive neurodevelopmental disorder characterized by developmental regression in infancy, delayed psychomotor development, severe intellectual disability, and cerebral and cerebellar atrophy. Additional features include swallowing problems, dystonia, bradykinesia, and continuous manual stereotypies without chorea. Some patients manifest seizures.</description>
        <dbReference type="MIM" id="617435"/>
    </disease>
    <text>The disease is caused by variants affecting the gene represented in this entry.</text>
</comment>
<comment type="similarity">
    <text evidence="31">Belongs to the huntingtin family.</text>
</comment>
<comment type="online information" name="Wikipedia">
    <link uri="https://en.wikipedia.org/wiki/Huntingtin"/>
    <text>Huntingtin entry</text>
</comment>
<sequence length="3142" mass="347603">MATLEKLMKAFESLKSFQQQQQQQQQQQQQQQQQQQQQPPPPPPPPPPPQLPQPPPQAQPLLPQPQPPPPPPPPPPGPAVAEEPLHRPKKELSATKKDRVNHCLTICENIVAQSVRNSPEFQKLLGIAMELFLLCSDDAESDVRMVADECLNKVIKALMDSNLPRLQLELYKEIKKNGAPRSLRAALWRFAELAHLVRPQKCRPYLVNLLPCLTRTSKRPEESVQETLAAAVPKIMASFGNFANDNEIKVLLKAFIANLKSSSPTIRRTAAGSAVSICQHSRRTQYFYSWLLNVLLGLLVPVEDEHSTLLILGVLLTLRYLVPLLQQQVKDTSLKGSFGVTRKEMEVSPSAEQLVQVYELTLHHTQHQDHNVVTGALELLQQLFRTPPPELLQTLTAVGGIGQLTAAKEESGGRSRSGSIVELIAGGGSSCSPVLSRKQKGKVLLGEEEALEDDSESRSDVSSSALTASVKDEISGELAASSGVSTPGSAGHDIITEQPRSQHTLQADSVDLASCDLTSSATDGDEEDILSHSSSQVSAVPSDPAMDLNDGTQASSPISDSSQTTTEGPDSAVTPSDSSEIVLDGTDNQYLGLQIGQPQDEDEEATGILPDEASEAFRNSSMALQQAHLLKNMSHCRQPSDSSVDKFVLRDEATEPGDQENKPCRIKGDIGQSTDDDSAPLVHCVRLLSASFLLTGGKNVLVPDRDVRVSVKALALSCVGAAVALHPESFFSKLYKVPLDTTEYPEEQYVSDILNYIDHGDPQVRGATAILCGTLICSILSRSRFHVGDWMGTIRTLTGNTFSLADCIPLLRKTLKDESSVTCKLACTAVRNCVMSLCSSSYSELGLQLIIDVLTLRNSSYWLVRTELLETLAEIDFRLVSFLEAKAENLHRGAHHYTGLLKLQERVLNNVVIHLLGDEDPRVRHVAAASLIRLVPKLFYKCDQGQADPVVAVARDQSSVYLKLLMHETQPPSHFSVSTITRIYRGYNLLPSITDVTMENNLSRVIAAVSHELITSTTRALTFGCCEALCLLSTAFPVCIWSLGWHCGVPPLSASDESRKSCTVGMATMILTLLSSAWFPLDLSAHQDALILAGNLLAASAPKSLRSSWASEEEANPAATKQEEVWPALGDRALVPMVEQLFSHLLKVINICAHVLDDVAPGPAIKAALPSLTNPPSLSPIRRKGKEKEPGEQASVPLSPKKGSEASAASRQSDTSGPVTTSKSSSLGSFYHLPSYLKLHDVLKATHANYKVTLDLQNSTEKFGGFLRSALDVLSQILELATLQDIGKCVEEILGYLKSCFSREPMMATVCVQQLLKTLFGTNLASQFDGLSSNPSKSQGRAQRLGSSSVRPGLYHYCFMAPYTHFTQALADASLRNMVQAEQENDTSGWFDVLQKVSTQLKTNLTSVTKNRADKNAIHNHIRLFEPLVIKALKQYTTTTCVQLQKQVLDLLAQLVQLRVNYCLLDSDQVFIGFVLKQFEYIEVGQFRESEAIIPNIFFFLVLLSYERYHSKQIIGIPKIIQLCDGIMASGRKAVTHAIPALQPIVHDLFVLRGTNKADAGKELETQKEVVVSMLLRLIQYHQVLEMFILVLQQCHKENEDKWKRLSRQIADIILPMLAKQQMHIDSHEALGVLNTLFEILAPSSLRPVDMLLRSMFVTPNTMASVSTVQLWISGILAILRVLISQSTEDIVLSRIQELSFSPYLISCTVINRLRDGDSTSTLEEHSEGKQIKNLPEETFSRFLLQLVGILLEDIVTKQLKVEMSEQQHTFYCQELGTLLMCLIHIFKSGMFRRITAAATRLFRSDGCGGSFYTLDSLNLRARSMITTHPALVLLWCQILLLVNHTDYRWWAEVQQTPKRHSLSSTKLLSPQMSGEEEDSDLAAKLGMCNREIVRRGALILFCDYVCQNLHDSEHLTWLIVNHIQDLISLSHEPPVQDFISAVHRNSAASGLFIQAIQSRCENLSTPTMLKKTLQCLEGIHLSQSGAVLTLYVDRLLCTPFRVLARMVDILACRRVEMLLAANLQSSMAQLPMEELNRIQEYLQSSGLAQRHQRLYSLLDRFRLSTMQDSLSPSPPVSSHPLDGDGHVSLETVSPDKDWYVHLVKSQCWTRSDSALLEGAELVNRIPAEDMNAFMMNSEFNLSLLAPCLSLGMSEISGGQKSALFEAAREVTLARVSGTVQQLPAVHHVFQPELPAEPAAYWSKLNDLFGDAALYQSLPTLARALAQYLVVVSKLPSHLHLPPEKEKDIVKFVVATLEALSWHLIHEQIPLSLDLQAGLDCCCLALQLPGLWSVVSSTEFVTHACSLIYCVHFILEAVAVQPGEQLLSPERRTNTPKAISEEEEEVDPNTQNPKYITAACEMVAEMVESLQSVLALGHKRNSGVPAFLTPLLRNIIISLARLPLVNSYTRVPPLVWKLGWSPKPGGDFGTAFPEIPVEFLQEKEVFKEFIYRINTLGWTSRTQFEETWATLLGVLVTQPLVMEQEESPPEEDTERTQINVLAVQAITSLVLSAMTVPVAGNPAVSCLEQQPRNKPLKALDTRFGRKLSIIRGIVEQEIQAMVSKRENIATHHLYQAWDPVPSLSPATTGALISHEKLLLQINPERELGSMSYKLGQVSIHSVWLGNSITPLREEEWDEEEEEEADAPAPSSPPTSPVNSRKHRAGVDIHSCSQFLLELYSRWILPSSSARRTPAILISEVVRSLLVVSDLFTERNQFELMYVTLTELRRVHPSEDEILAQYLVPATCKAAAVLGMDKAVAEPVSRLLESTLRSSHLPSRVGALHGVLYVLECDLLDDTAKQLIPVISDYLLSNLKGIAHCVNIHSQQHVLVMCATAFYLIENYPLDVGPEFSASIIQMCGVMLSGSEESTPSIIYHCALRGLERLLLSEQLSRLDAESLVKLSVDRVNVHSPHRAMAALGLMLTCMYTGKEKVSPGRTSDPNPAAPDSESVIVAMERVSVLFDRIRKGFPCEARVVARILPQFLDDFFPPQDIMNKVIGEFLSNQQPYPQFMATVVYKVFQTLHSTGQSSMVRDWVMLSLSNFTQRAPVAMATWSLSCFFVSASTSPWVAAILPHVISRMGKLEQVDVNLFCLVATDFYRHQIEEELDRRAFQSVLEVVAAPGSPYHRLLTCLRNVHKVTTC</sequence>
<proteinExistence type="evidence at protein level"/>
<protein>
    <recommendedName>
        <fullName>Huntingtin</fullName>
    </recommendedName>
    <alternativeName>
        <fullName>Huntington disease protein</fullName>
        <shortName>HD protein</shortName>
    </alternativeName>
    <component>
        <recommendedName>
            <fullName>Huntingtin, myristoylated N-terminal fragment</fullName>
        </recommendedName>
    </component>
</protein>
<dbReference type="EMBL" id="L12392">
    <property type="protein sequence ID" value="AAB38240.1"/>
    <property type="molecule type" value="mRNA"/>
</dbReference>
<dbReference type="EMBL" id="AB016794">
    <property type="protein sequence ID" value="BAA36753.1"/>
    <property type="molecule type" value="mRNA"/>
</dbReference>
<dbReference type="EMBL" id="Z49154">
    <property type="protein sequence ID" value="CAA89024.1"/>
    <property type="molecule type" value="Genomic_DNA"/>
</dbReference>
<dbReference type="EMBL" id="Z49155">
    <property type="protein sequence ID" value="CAA89025.1"/>
    <property type="molecule type" value="Genomic_DNA"/>
</dbReference>
<dbReference type="EMBL" id="Z49208">
    <property type="status" value="NOT_ANNOTATED_CDS"/>
    <property type="molecule type" value="Genomic_DNA"/>
</dbReference>
<dbReference type="EMBL" id="Z49769">
    <property type="protein sequence ID" value="CAA89839.1"/>
    <property type="molecule type" value="Genomic_DNA"/>
</dbReference>
<dbReference type="EMBL" id="Z68756">
    <property type="status" value="NOT_ANNOTATED_CDS"/>
    <property type="molecule type" value="Genomic_DNA"/>
</dbReference>
<dbReference type="EMBL" id="Z69649">
    <property type="status" value="NOT_ANNOTATED_CDS"/>
    <property type="molecule type" value="Genomic_DNA"/>
</dbReference>
<dbReference type="EMBL" id="L27350">
    <property type="status" value="NOT_ANNOTATED_CDS"/>
    <property type="molecule type" value="Genomic_DNA"/>
</dbReference>
<dbReference type="EMBL" id="L27351">
    <property type="status" value="NOT_ANNOTATED_CDS"/>
    <property type="molecule type" value="Genomic_DNA"/>
</dbReference>
<dbReference type="EMBL" id="L27352">
    <property type="status" value="NOT_ANNOTATED_CDS"/>
    <property type="molecule type" value="Genomic_DNA"/>
</dbReference>
<dbReference type="EMBL" id="L27353">
    <property type="status" value="NOT_ANNOTATED_CDS"/>
    <property type="molecule type" value="Genomic_DNA"/>
</dbReference>
<dbReference type="EMBL" id="L27354">
    <property type="status" value="NOT_ANNOTATED_CDS"/>
    <property type="molecule type" value="Genomic_DNA"/>
</dbReference>
<dbReference type="EMBL" id="L34020">
    <property type="status" value="NOT_ANNOTATED_CDS"/>
    <property type="molecule type" value="Genomic_DNA"/>
</dbReference>
<dbReference type="EMBL" id="L20431">
    <property type="protein sequence ID" value="AAA52702.1"/>
    <property type="molecule type" value="mRNA"/>
</dbReference>
<dbReference type="CCDS" id="CCDS43206.1"/>
<dbReference type="PIR" id="A46068">
    <property type="entry name" value="A46068"/>
</dbReference>
<dbReference type="RefSeq" id="NP_001375421.1">
    <property type="nucleotide sequence ID" value="NM_001388492.1"/>
</dbReference>
<dbReference type="RefSeq" id="NP_002102.4">
    <property type="nucleotide sequence ID" value="NM_002111.8"/>
</dbReference>
<dbReference type="PDB" id="2LD0">
    <property type="method" value="NMR"/>
    <property type="chains" value="A=1-17"/>
</dbReference>
<dbReference type="PDB" id="2LD2">
    <property type="method" value="NMR"/>
    <property type="chains" value="A=1-17"/>
</dbReference>
<dbReference type="PDB" id="3IO4">
    <property type="method" value="X-ray"/>
    <property type="resolution" value="3.63 A"/>
    <property type="chains" value="A/B/C=1-64"/>
</dbReference>
<dbReference type="PDB" id="3IO6">
    <property type="method" value="X-ray"/>
    <property type="resolution" value="3.70 A"/>
    <property type="chains" value="A/B/C=1-64"/>
</dbReference>
<dbReference type="PDB" id="3IOR">
    <property type="method" value="X-ray"/>
    <property type="resolution" value="3.60 A"/>
    <property type="chains" value="A/B/C=1-64"/>
</dbReference>
<dbReference type="PDB" id="3IOT">
    <property type="method" value="X-ray"/>
    <property type="resolution" value="3.50 A"/>
    <property type="chains" value="A/B/C=1-64"/>
</dbReference>
<dbReference type="PDB" id="3IOU">
    <property type="method" value="X-ray"/>
    <property type="resolution" value="3.70 A"/>
    <property type="chains" value="A/B/C=1-64"/>
</dbReference>
<dbReference type="PDB" id="3IOV">
    <property type="method" value="X-ray"/>
    <property type="resolution" value="3.70 A"/>
    <property type="chains" value="A/B/C=1-64"/>
</dbReference>
<dbReference type="PDB" id="3IOW">
    <property type="method" value="X-ray"/>
    <property type="resolution" value="3.50 A"/>
    <property type="chains" value="A/B/C=1-64"/>
</dbReference>
<dbReference type="PDB" id="3LRH">
    <property type="method" value="X-ray"/>
    <property type="resolution" value="2.60 A"/>
    <property type="chains" value="B/D/F/H/J/L/N/P=5-18"/>
</dbReference>
<dbReference type="PDB" id="4FE8">
    <property type="method" value="X-ray"/>
    <property type="resolution" value="3.00 A"/>
    <property type="chains" value="A/B/C=1-64"/>
</dbReference>
<dbReference type="PDB" id="4FEB">
    <property type="method" value="X-ray"/>
    <property type="resolution" value="2.80 A"/>
    <property type="chains" value="A/B/C=1-64"/>
</dbReference>
<dbReference type="PDB" id="4FEC">
    <property type="method" value="X-ray"/>
    <property type="resolution" value="3.00 A"/>
    <property type="chains" value="A/B/C=1-64"/>
</dbReference>
<dbReference type="PDB" id="4FED">
    <property type="method" value="X-ray"/>
    <property type="resolution" value="2.81 A"/>
    <property type="chains" value="A/B/C=1-64"/>
</dbReference>
<dbReference type="PDB" id="4RAV">
    <property type="method" value="X-ray"/>
    <property type="resolution" value="2.50 A"/>
    <property type="chains" value="E/F=1-17"/>
</dbReference>
<dbReference type="PDB" id="6EZ8">
    <property type="method" value="EM"/>
    <property type="resolution" value="4.00 A"/>
    <property type="chains" value="A=1-3142"/>
</dbReference>
<dbReference type="PDB" id="6N8C">
    <property type="method" value="NMR"/>
    <property type="chains" value="A/B/C/D=2-24"/>
</dbReference>
<dbReference type="PDB" id="6RMH">
    <property type="method" value="EM"/>
    <property type="resolution" value="9.60 A"/>
    <property type="chains" value="A=1-3142"/>
</dbReference>
<dbReference type="PDB" id="6X9O">
    <property type="method" value="EM"/>
    <property type="resolution" value="2.60 A"/>
    <property type="chains" value="A=1-3142"/>
</dbReference>
<dbReference type="PDB" id="6YEJ">
    <property type="method" value="EM"/>
    <property type="resolution" value="18.20 A"/>
    <property type="chains" value="A=18-3142"/>
</dbReference>
<dbReference type="PDB" id="7DXJ">
    <property type="method" value="EM"/>
    <property type="resolution" value="3.60 A"/>
    <property type="chains" value="A=1-3142"/>
</dbReference>
<dbReference type="PDB" id="7DXK">
    <property type="method" value="EM"/>
    <property type="resolution" value="4.10 A"/>
    <property type="chains" value="A=18-3142"/>
</dbReference>
<dbReference type="PDB" id="8R2O">
    <property type="method" value="X-ray"/>
    <property type="resolution" value="3.23 A"/>
    <property type="chains" value="A/B=1-64"/>
</dbReference>
<dbReference type="PDB" id="8SAH">
    <property type="method" value="EM"/>
    <property type="resolution" value="3.20 A"/>
    <property type="chains" value="A=2093-3136"/>
</dbReference>
<dbReference type="PDB" id="8VLX">
    <property type="method" value="EM"/>
    <property type="resolution" value="2.60 A"/>
    <property type="chains" value="A=1-3142"/>
</dbReference>
<dbReference type="PDB" id="8W15">
    <property type="method" value="EM"/>
    <property type="resolution" value="2.72 A"/>
    <property type="chains" value="A=1-3142"/>
</dbReference>
<dbReference type="PDBsum" id="2LD0"/>
<dbReference type="PDBsum" id="2LD2"/>
<dbReference type="PDBsum" id="3IO4"/>
<dbReference type="PDBsum" id="3IO6"/>
<dbReference type="PDBsum" id="3IOR"/>
<dbReference type="PDBsum" id="3IOT"/>
<dbReference type="PDBsum" id="3IOU"/>
<dbReference type="PDBsum" id="3IOV"/>
<dbReference type="PDBsum" id="3IOW"/>
<dbReference type="PDBsum" id="3LRH"/>
<dbReference type="PDBsum" id="4FE8"/>
<dbReference type="PDBsum" id="4FEB"/>
<dbReference type="PDBsum" id="4FEC"/>
<dbReference type="PDBsum" id="4FED"/>
<dbReference type="PDBsum" id="4RAV"/>
<dbReference type="PDBsum" id="6EZ8"/>
<dbReference type="PDBsum" id="6N8C"/>
<dbReference type="PDBsum" id="6RMH"/>
<dbReference type="PDBsum" id="6X9O"/>
<dbReference type="PDBsum" id="6YEJ"/>
<dbReference type="PDBsum" id="7DXJ"/>
<dbReference type="PDBsum" id="7DXK"/>
<dbReference type="PDBsum" id="8R2O"/>
<dbReference type="PDBsum" id="8SAH"/>
<dbReference type="PDBsum" id="8VLX"/>
<dbReference type="PDBsum" id="8W15"/>
<dbReference type="BMRB" id="P42858"/>
<dbReference type="EMDB" id="EMD-10793"/>
<dbReference type="EMDB" id="EMD-22106"/>
<dbReference type="EMDB" id="EMD-28766"/>
<dbReference type="EMDB" id="EMD-28767"/>
<dbReference type="EMDB" id="EMD-2947"/>
<dbReference type="EMDB" id="EMD-30911"/>
<dbReference type="EMDB" id="EMD-30912"/>
<dbReference type="EMDB" id="EMD-3984"/>
<dbReference type="EMDB" id="EMD-43347"/>
<dbReference type="EMDB" id="EMD-43715"/>
<dbReference type="EMDB" id="EMD-4937"/>
<dbReference type="SASBDB" id="P42858"/>
<dbReference type="SMR" id="P42858"/>
<dbReference type="BioGRID" id="109314">
    <property type="interactions" value="455"/>
</dbReference>
<dbReference type="CORUM" id="P42858"/>
<dbReference type="DIP" id="DIP-32492N"/>
<dbReference type="ELM" id="P42858"/>
<dbReference type="FunCoup" id="P42858">
    <property type="interactions" value="3255"/>
</dbReference>
<dbReference type="IntAct" id="P42858">
    <property type="interactions" value="1120"/>
</dbReference>
<dbReference type="MINT" id="P42858"/>
<dbReference type="STRING" id="9606.ENSP00000347184"/>
<dbReference type="BindingDB" id="P42858"/>
<dbReference type="ChEMBL" id="CHEMBL5514"/>
<dbReference type="DrugBank" id="DB09130">
    <property type="generic name" value="Copper"/>
</dbReference>
<dbReference type="MoonDB" id="P42858">
    <property type="type" value="Predicted"/>
</dbReference>
<dbReference type="TCDB" id="8.A.222.1.1">
    <property type="family name" value="the huntingtin (htt) family"/>
</dbReference>
<dbReference type="GlyCosmos" id="P42858">
    <property type="glycosylation" value="3 sites, 1 glycan"/>
</dbReference>
<dbReference type="GlyGen" id="P42858">
    <property type="glycosylation" value="10 sites, 3 N-linked glycans (1 site), 1 O-linked glycan (8 sites)"/>
</dbReference>
<dbReference type="iPTMnet" id="P42858"/>
<dbReference type="MetOSite" id="P42858"/>
<dbReference type="PhosphoSitePlus" id="P42858"/>
<dbReference type="SwissPalm" id="P42858"/>
<dbReference type="BioMuta" id="HTT"/>
<dbReference type="DMDM" id="296434520"/>
<dbReference type="jPOST" id="P42858"/>
<dbReference type="MassIVE" id="P42858"/>
<dbReference type="PaxDb" id="9606-ENSP00000347184"/>
<dbReference type="PeptideAtlas" id="P42858"/>
<dbReference type="ProteomicsDB" id="55561"/>
<dbReference type="Pumba" id="P42858"/>
<dbReference type="ABCD" id="P42858">
    <property type="antibodies" value="5 sequenced antibodies"/>
</dbReference>
<dbReference type="Antibodypedia" id="3449">
    <property type="antibodies" value="829 antibodies from 41 providers"/>
</dbReference>
<dbReference type="DNASU" id="3064"/>
<dbReference type="YCharOS" id="P42858">
    <property type="antibodies" value="Tested 20 antibodies from 9 manufacturers"/>
</dbReference>
<dbReference type="Ensembl" id="ENST00000355072.11">
    <property type="protein sequence ID" value="ENSP00000347184.5"/>
    <property type="gene ID" value="ENSG00000197386.14"/>
</dbReference>
<dbReference type="GeneID" id="3064"/>
<dbReference type="KEGG" id="hsa:3064"/>
<dbReference type="MANE-Select" id="ENST00000355072.11">
    <property type="protein sequence ID" value="ENSP00000347184.5"/>
    <property type="RefSeq nucleotide sequence ID" value="NM_001388492.1"/>
    <property type="RefSeq protein sequence ID" value="NP_001375421.1"/>
</dbReference>
<dbReference type="UCSC" id="uc062uto.1">
    <property type="organism name" value="human"/>
</dbReference>
<dbReference type="AGR" id="HGNC:4851"/>
<dbReference type="CTD" id="3064"/>
<dbReference type="DisGeNET" id="3064"/>
<dbReference type="GeneCards" id="HTT"/>
<dbReference type="GeneReviews" id="HTT"/>
<dbReference type="HGNC" id="HGNC:4851">
    <property type="gene designation" value="HTT"/>
</dbReference>
<dbReference type="HPA" id="ENSG00000197386">
    <property type="expression patterns" value="Low tissue specificity"/>
</dbReference>
<dbReference type="MalaCards" id="HTT"/>
<dbReference type="MIM" id="143100">
    <property type="type" value="phenotype"/>
</dbReference>
<dbReference type="MIM" id="613004">
    <property type="type" value="gene"/>
</dbReference>
<dbReference type="MIM" id="617435">
    <property type="type" value="phenotype"/>
</dbReference>
<dbReference type="neXtProt" id="NX_P42858"/>
<dbReference type="OpenTargets" id="ENSG00000197386"/>
<dbReference type="Orphanet" id="399">
    <property type="disease" value="Huntington disease"/>
</dbReference>
<dbReference type="Orphanet" id="248111">
    <property type="disease" value="Juvenile Huntington disease"/>
</dbReference>
<dbReference type="Orphanet" id="528084">
    <property type="disease" value="Non-specific syndromic intellectual disability"/>
</dbReference>
<dbReference type="PharmGKB" id="PA164741646"/>
<dbReference type="VEuPathDB" id="HostDB:ENSG00000197386"/>
<dbReference type="eggNOG" id="ENOG502QR1D">
    <property type="taxonomic scope" value="Eukaryota"/>
</dbReference>
<dbReference type="GeneTree" id="ENSGT00390000015863"/>
<dbReference type="HOGENOM" id="CLU_000428_0_0_1"/>
<dbReference type="InParanoid" id="P42858"/>
<dbReference type="OMA" id="PNKMEEP"/>
<dbReference type="OrthoDB" id="10065698at2759"/>
<dbReference type="PAN-GO" id="P42858">
    <property type="GO annotations" value="2 GO annotations based on evolutionary models"/>
</dbReference>
<dbReference type="PhylomeDB" id="P42858"/>
<dbReference type="TreeFam" id="TF323608"/>
<dbReference type="PathwayCommons" id="P42858"/>
<dbReference type="Reactome" id="R-HSA-9022692">
    <property type="pathway name" value="Regulation of MECP2 expression and activity"/>
</dbReference>
<dbReference type="SignaLink" id="P42858"/>
<dbReference type="SIGNOR" id="P42858"/>
<dbReference type="BioGRID-ORCS" id="3064">
    <property type="hits" value="35 hits in 1164 CRISPR screens"/>
</dbReference>
<dbReference type="CD-CODE" id="518B4F3F">
    <property type="entry name" value="Htt inclusion"/>
</dbReference>
<dbReference type="CD-CODE" id="8C2F96ED">
    <property type="entry name" value="Centrosome"/>
</dbReference>
<dbReference type="CD-CODE" id="DEE660B4">
    <property type="entry name" value="Stress granule"/>
</dbReference>
<dbReference type="CD-CODE" id="FB4E32DD">
    <property type="entry name" value="Presynaptic clusters and postsynaptic densities"/>
</dbReference>
<dbReference type="ChiTaRS" id="HTT">
    <property type="organism name" value="human"/>
</dbReference>
<dbReference type="EvolutionaryTrace" id="P42858"/>
<dbReference type="GeneWiki" id="Huntingtin"/>
<dbReference type="GenomeRNAi" id="3064"/>
<dbReference type="Pharos" id="P42858">
    <property type="development level" value="Tchem"/>
</dbReference>
<dbReference type="PRO" id="PR:P42858"/>
<dbReference type="Proteomes" id="UP000005640">
    <property type="component" value="Chromosome 4"/>
</dbReference>
<dbReference type="RNAct" id="P42858">
    <property type="molecule type" value="protein"/>
</dbReference>
<dbReference type="Bgee" id="ENSG00000197386">
    <property type="expression patterns" value="Expressed in sural nerve and 134 other cell types or tissues"/>
</dbReference>
<dbReference type="ExpressionAtlas" id="P42858">
    <property type="expression patterns" value="baseline and differential"/>
</dbReference>
<dbReference type="GO" id="GO:0005776">
    <property type="term" value="C:autophagosome"/>
    <property type="evidence" value="ECO:0000314"/>
    <property type="project" value="UniProtKB"/>
</dbReference>
<dbReference type="GO" id="GO:0030424">
    <property type="term" value="C:axon"/>
    <property type="evidence" value="ECO:0000314"/>
    <property type="project" value="UniProtKB"/>
</dbReference>
<dbReference type="GO" id="GO:0005814">
    <property type="term" value="C:centriole"/>
    <property type="evidence" value="ECO:0000314"/>
    <property type="project" value="SYSCILIA_CCNET"/>
</dbReference>
<dbReference type="GO" id="GO:0005737">
    <property type="term" value="C:cytoplasm"/>
    <property type="evidence" value="ECO:0000314"/>
    <property type="project" value="UniProtKB"/>
</dbReference>
<dbReference type="GO" id="GO:0030659">
    <property type="term" value="C:cytoplasmic vesicle membrane"/>
    <property type="evidence" value="ECO:0000314"/>
    <property type="project" value="UniProtKB"/>
</dbReference>
<dbReference type="GO" id="GO:0005829">
    <property type="term" value="C:cytosol"/>
    <property type="evidence" value="ECO:0000314"/>
    <property type="project" value="UniProtKB"/>
</dbReference>
<dbReference type="GO" id="GO:0030425">
    <property type="term" value="C:dendrite"/>
    <property type="evidence" value="ECO:0000314"/>
    <property type="project" value="UniProtKB"/>
</dbReference>
<dbReference type="GO" id="GO:0005769">
    <property type="term" value="C:early endosome"/>
    <property type="evidence" value="ECO:0000314"/>
    <property type="project" value="UniProtKB"/>
</dbReference>
<dbReference type="GO" id="GO:0005783">
    <property type="term" value="C:endoplasmic reticulum"/>
    <property type="evidence" value="ECO:0000314"/>
    <property type="project" value="UniProtKB"/>
</dbReference>
<dbReference type="GO" id="GO:0005794">
    <property type="term" value="C:Golgi apparatus"/>
    <property type="evidence" value="ECO:0000314"/>
    <property type="project" value="UniProtKB"/>
</dbReference>
<dbReference type="GO" id="GO:0016234">
    <property type="term" value="C:inclusion body"/>
    <property type="evidence" value="ECO:0000315"/>
    <property type="project" value="CAFA"/>
</dbReference>
<dbReference type="GO" id="GO:0005770">
    <property type="term" value="C:late endosome"/>
    <property type="evidence" value="ECO:0000314"/>
    <property type="project" value="UniProtKB"/>
</dbReference>
<dbReference type="GO" id="GO:0005654">
    <property type="term" value="C:nucleoplasm"/>
    <property type="evidence" value="ECO:0000314"/>
    <property type="project" value="HPA"/>
</dbReference>
<dbReference type="GO" id="GO:0005634">
    <property type="term" value="C:nucleus"/>
    <property type="evidence" value="ECO:0000314"/>
    <property type="project" value="UniProtKB"/>
</dbReference>
<dbReference type="GO" id="GO:0048471">
    <property type="term" value="C:perinuclear region of cytoplasm"/>
    <property type="evidence" value="ECO:0000315"/>
    <property type="project" value="CAFA"/>
</dbReference>
<dbReference type="GO" id="GO:0099524">
    <property type="term" value="C:postsynaptic cytosol"/>
    <property type="evidence" value="ECO:0000314"/>
    <property type="project" value="SynGO"/>
</dbReference>
<dbReference type="GO" id="GO:0099523">
    <property type="term" value="C:presynaptic cytosol"/>
    <property type="evidence" value="ECO:0000314"/>
    <property type="project" value="SynGO"/>
</dbReference>
<dbReference type="GO" id="GO:0032991">
    <property type="term" value="C:protein-containing complex"/>
    <property type="evidence" value="ECO:0000314"/>
    <property type="project" value="UniProtKB"/>
</dbReference>
<dbReference type="GO" id="GO:0048487">
    <property type="term" value="F:beta-tubulin binding"/>
    <property type="evidence" value="ECO:0000314"/>
    <property type="project" value="UniProtKB"/>
</dbReference>
<dbReference type="GO" id="GO:0034452">
    <property type="term" value="F:dynactin binding"/>
    <property type="evidence" value="ECO:0000353"/>
    <property type="project" value="UniProtKB"/>
</dbReference>
<dbReference type="GO" id="GO:0045505">
    <property type="term" value="F:dynein intermediate chain binding"/>
    <property type="evidence" value="ECO:0000314"/>
    <property type="project" value="UniProtKB"/>
</dbReference>
<dbReference type="GO" id="GO:0031072">
    <property type="term" value="F:heat shock protein binding"/>
    <property type="evidence" value="ECO:0000353"/>
    <property type="project" value="CAFA"/>
</dbReference>
<dbReference type="GO" id="GO:0042802">
    <property type="term" value="F:identical protein binding"/>
    <property type="evidence" value="ECO:0000353"/>
    <property type="project" value="IntAct"/>
</dbReference>
<dbReference type="GO" id="GO:0019900">
    <property type="term" value="F:kinase binding"/>
    <property type="evidence" value="ECO:0000353"/>
    <property type="project" value="ParkinsonsUK-UCL"/>
</dbReference>
<dbReference type="GO" id="GO:0002039">
    <property type="term" value="F:p53 binding"/>
    <property type="evidence" value="ECO:0000353"/>
    <property type="project" value="UniProtKB"/>
</dbReference>
<dbReference type="GO" id="GO:0004721">
    <property type="term" value="F:phosphoprotein phosphatase activity"/>
    <property type="evidence" value="ECO:0000315"/>
    <property type="project" value="dictyBase"/>
</dbReference>
<dbReference type="GO" id="GO:0005522">
    <property type="term" value="F:profilin binding"/>
    <property type="evidence" value="ECO:0000353"/>
    <property type="project" value="UniProtKB"/>
</dbReference>
<dbReference type="GO" id="GO:0044325">
    <property type="term" value="F:transmembrane transporter binding"/>
    <property type="evidence" value="ECO:0000314"/>
    <property type="project" value="UniProtKB"/>
</dbReference>
<dbReference type="GO" id="GO:0006915">
    <property type="term" value="P:apoptotic process"/>
    <property type="evidence" value="ECO:0007669"/>
    <property type="project" value="UniProtKB-KW"/>
</dbReference>
<dbReference type="GO" id="GO:0000132">
    <property type="term" value="P:establishment of mitotic spindle orientation"/>
    <property type="evidence" value="ECO:0000315"/>
    <property type="project" value="UniProtKB"/>
</dbReference>
<dbReference type="GO" id="GO:0007030">
    <property type="term" value="P:Golgi organization"/>
    <property type="evidence" value="ECO:0000315"/>
    <property type="project" value="UniProtKB"/>
</dbReference>
<dbReference type="GO" id="GO:0099111">
    <property type="term" value="P:microtubule-based transport"/>
    <property type="evidence" value="ECO:0000318"/>
    <property type="project" value="GO_Central"/>
</dbReference>
<dbReference type="GO" id="GO:2001237">
    <property type="term" value="P:negative regulation of extrinsic apoptotic signaling pathway"/>
    <property type="evidence" value="ECO:0000315"/>
    <property type="project" value="UniProtKB"/>
</dbReference>
<dbReference type="GO" id="GO:1905337">
    <property type="term" value="P:positive regulation of aggrephagy"/>
    <property type="evidence" value="ECO:0000315"/>
    <property type="project" value="ParkinsonsUK-UCL"/>
</dbReference>
<dbReference type="GO" id="GO:0043065">
    <property type="term" value="P:positive regulation of apoptotic process"/>
    <property type="evidence" value="ECO:0000314"/>
    <property type="project" value="CAFA"/>
</dbReference>
<dbReference type="GO" id="GO:1905291">
    <property type="term" value="P:positive regulation of CAMKK-AMPK signaling cascade"/>
    <property type="evidence" value="ECO:0000315"/>
    <property type="project" value="ARUK-UCL"/>
</dbReference>
<dbReference type="GO" id="GO:0045724">
    <property type="term" value="P:positive regulation of cilium assembly"/>
    <property type="evidence" value="ECO:0000315"/>
    <property type="project" value="SYSCILIA_CCNET"/>
</dbReference>
<dbReference type="GO" id="GO:0031587">
    <property type="term" value="P:positive regulation of inositol 1,4,5-trisphosphate-sensitive calcium-release channel activity"/>
    <property type="evidence" value="ECO:0000314"/>
    <property type="project" value="UniProtKB"/>
</dbReference>
<dbReference type="GO" id="GO:1904504">
    <property type="term" value="P:positive regulation of lipophagy"/>
    <property type="evidence" value="ECO:0000315"/>
    <property type="project" value="ParkinsonsUK-UCL"/>
</dbReference>
<dbReference type="GO" id="GO:1901526">
    <property type="term" value="P:positive regulation of mitophagy"/>
    <property type="evidence" value="ECO:0000315"/>
    <property type="project" value="ParkinsonsUK-UCL"/>
</dbReference>
<dbReference type="GO" id="GO:0031648">
    <property type="term" value="P:protein destabilization"/>
    <property type="evidence" value="ECO:0000315"/>
    <property type="project" value="CAFA"/>
</dbReference>
<dbReference type="GO" id="GO:1905289">
    <property type="term" value="P:regulation of CAMKK-AMPK signaling cascade"/>
    <property type="evidence" value="ECO:0000315"/>
    <property type="project" value="ARUK-UCL"/>
</dbReference>
<dbReference type="GO" id="GO:0006890">
    <property type="term" value="P:retrograde vesicle-mediated transport, Golgi to endoplasmic reticulum"/>
    <property type="evidence" value="ECO:0000315"/>
    <property type="project" value="UniProtKB"/>
</dbReference>
<dbReference type="GO" id="GO:0047496">
    <property type="term" value="P:vesicle transport along microtubule"/>
    <property type="evidence" value="ECO:0000315"/>
    <property type="project" value="UniProtKB"/>
</dbReference>
<dbReference type="GO" id="GO:0042297">
    <property type="term" value="P:vocal learning"/>
    <property type="evidence" value="ECO:0000315"/>
    <property type="project" value="AgBase"/>
</dbReference>
<dbReference type="FunFam" id="1.25.10.10:FF:000273">
    <property type="entry name" value="Huntingtin"/>
    <property type="match status" value="1"/>
</dbReference>
<dbReference type="FunFam" id="1.25.10.10:FF:000388">
    <property type="entry name" value="Huntingtin"/>
    <property type="match status" value="1"/>
</dbReference>
<dbReference type="Gene3D" id="1.25.10.10">
    <property type="entry name" value="Leucine-rich Repeat Variant"/>
    <property type="match status" value="2"/>
</dbReference>
<dbReference type="InterPro" id="IPR011989">
    <property type="entry name" value="ARM-like"/>
</dbReference>
<dbReference type="InterPro" id="IPR016024">
    <property type="entry name" value="ARM-type_fold"/>
</dbReference>
<dbReference type="InterPro" id="IPR048412">
    <property type="entry name" value="Htt_bridge"/>
</dbReference>
<dbReference type="InterPro" id="IPR048413">
    <property type="entry name" value="Htt_C-HEAT_rpt"/>
</dbReference>
<dbReference type="InterPro" id="IPR048411">
    <property type="entry name" value="Htt_N_HEAT_rpt-1"/>
</dbReference>
<dbReference type="InterPro" id="IPR000091">
    <property type="entry name" value="Huntingtin"/>
</dbReference>
<dbReference type="InterPro" id="IPR028426">
    <property type="entry name" value="Huntingtin_fam"/>
</dbReference>
<dbReference type="InterPro" id="IPR024613">
    <property type="entry name" value="Huntingtin_N_HEAT_rpt-2"/>
</dbReference>
<dbReference type="PANTHER" id="PTHR10170:SF10">
    <property type="entry name" value="HUNTINGTIN"/>
    <property type="match status" value="1"/>
</dbReference>
<dbReference type="PANTHER" id="PTHR10170">
    <property type="entry name" value="HUNTINGTON DISEASE PROTEIN"/>
    <property type="match status" value="1"/>
</dbReference>
<dbReference type="Pfam" id="PF20925">
    <property type="entry name" value="Htt_bridge"/>
    <property type="match status" value="1"/>
</dbReference>
<dbReference type="Pfam" id="PF20927">
    <property type="entry name" value="Htt_C-HEAT"/>
    <property type="match status" value="1"/>
</dbReference>
<dbReference type="Pfam" id="PF12372">
    <property type="entry name" value="Htt_N-HEAT"/>
    <property type="match status" value="1"/>
</dbReference>
<dbReference type="Pfam" id="PF20926">
    <property type="entry name" value="Htt_N-HEAT_1"/>
    <property type="match status" value="1"/>
</dbReference>
<dbReference type="PRINTS" id="PR00375">
    <property type="entry name" value="HUNTINGTIN"/>
</dbReference>
<dbReference type="SUPFAM" id="SSF48371">
    <property type="entry name" value="ARM repeat"/>
    <property type="match status" value="2"/>
</dbReference>
<dbReference type="SUPFAM" id="SSF81995">
    <property type="entry name" value="beta-sandwich domain of Sec23/24"/>
    <property type="match status" value="1"/>
</dbReference>
<reference key="1">
    <citation type="journal article" date="1993" name="Cell">
        <title>A novel gene containing a trinucleotide repeat that is expanded and unstable on Huntington's disease chromosomes.</title>
        <authorList>
            <person name="Macdonald M."/>
            <person name="Ambrose C.M."/>
            <person name="Duyao M.P."/>
            <person name="Myers R.H."/>
            <person name="Lin C.S."/>
            <person name="Srinidhi J."/>
            <person name="Barnes G."/>
            <person name="Taylor S.A."/>
            <person name="James M."/>
            <person name="Groot N."/>
            <person name="McFarlane H."/>
            <person name="Jenkins B."/>
            <person name="Anderson M.A."/>
            <person name="Wexler N.S."/>
            <person name="Gusella J.F."/>
            <person name="Bates G.P."/>
            <person name="Baxendale S."/>
            <person name="Hummerich H."/>
            <person name="Kirby S."/>
            <person name="North M."/>
            <person name="Youngman S."/>
            <person name="Mott R."/>
            <person name="Zehetner G."/>
            <person name="Sedlacek Z."/>
            <person name="Poustka A."/>
            <person name="Frischauf A.-M."/>
            <person name="Lehrach H."/>
            <person name="Buckler A.J."/>
            <person name="Church D."/>
            <person name="Doucette-Stamm L."/>
            <person name="O'Donovan M.C."/>
            <person name="Riba-Ramirez L."/>
            <person name="Shah M."/>
            <person name="Stanton V.P."/>
            <person name="Strobel S.A."/>
            <person name="Draths K.M."/>
            <person name="Wales J.L."/>
            <person name="Dervan P."/>
            <person name="Housman D.E."/>
            <person name="Altherr M."/>
            <person name="Shiang R."/>
            <person name="Thompson L."/>
            <person name="Fielder T."/>
            <person name="Wasmuth J.J."/>
            <person name="Tagle D."/>
            <person name="Valdes J."/>
            <person name="Elmer L."/>
            <person name="Allard M."/>
            <person name="Castilla L."/>
            <person name="Swaroop M."/>
            <person name="Blanchard K."/>
            <person name="Collins F.S."/>
            <person name="Snell R."/>
            <person name="Holloway T."/>
            <person name="Gillespie K."/>
            <person name="Datson N."/>
            <person name="Shaw S."/>
            <person name="Harper P.S."/>
        </authorList>
    </citation>
    <scope>NUCLEOTIDE SEQUENCE [MRNA]</scope>
    <scope>INVOLVEMENT IN HD</scope>
    <source>
        <tissue>Retina</tissue>
    </source>
</reference>
<reference key="2">
    <citation type="journal article" date="2000" name="Genomics">
        <title>Identification and characterization of the miniature pig Huntington's disease gene homolog: evidence for conservation and polymorphism in the CAG triplet repeat.</title>
        <authorList>
            <person name="Matsuyama N."/>
            <person name="Hadano S."/>
            <person name="Onoe K."/>
            <person name="Osuga H."/>
            <person name="Shouguchi-Miyata J."/>
            <person name="Gondo Y."/>
            <person name="Ikeda J.-E."/>
        </authorList>
    </citation>
    <scope>NUCLEOTIDE SEQUENCE [MRNA]</scope>
    <source>
        <tissue>Brain</tissue>
    </source>
</reference>
<reference key="3">
    <citation type="journal article" date="2005" name="Nature">
        <title>Generation and annotation of the DNA sequences of human chromosomes 2 and 4.</title>
        <authorList>
            <person name="Hillier L.W."/>
            <person name="Graves T.A."/>
            <person name="Fulton R.S."/>
            <person name="Fulton L.A."/>
            <person name="Pepin K.H."/>
            <person name="Minx P."/>
            <person name="Wagner-McPherson C."/>
            <person name="Layman D."/>
            <person name="Wylie K."/>
            <person name="Sekhon M."/>
            <person name="Becker M.C."/>
            <person name="Fewell G.A."/>
            <person name="Delehaunty K.D."/>
            <person name="Miner T.L."/>
            <person name="Nash W.E."/>
            <person name="Kremitzki C."/>
            <person name="Oddy L."/>
            <person name="Du H."/>
            <person name="Sun H."/>
            <person name="Bradshaw-Cordum H."/>
            <person name="Ali J."/>
            <person name="Carter J."/>
            <person name="Cordes M."/>
            <person name="Harris A."/>
            <person name="Isak A."/>
            <person name="van Brunt A."/>
            <person name="Nguyen C."/>
            <person name="Du F."/>
            <person name="Courtney L."/>
            <person name="Kalicki J."/>
            <person name="Ozersky P."/>
            <person name="Abbott S."/>
            <person name="Armstrong J."/>
            <person name="Belter E.A."/>
            <person name="Caruso L."/>
            <person name="Cedroni M."/>
            <person name="Cotton M."/>
            <person name="Davidson T."/>
            <person name="Desai A."/>
            <person name="Elliott G."/>
            <person name="Erb T."/>
            <person name="Fronick C."/>
            <person name="Gaige T."/>
            <person name="Haakenson W."/>
            <person name="Haglund K."/>
            <person name="Holmes A."/>
            <person name="Harkins R."/>
            <person name="Kim K."/>
            <person name="Kruchowski S.S."/>
            <person name="Strong C.M."/>
            <person name="Grewal N."/>
            <person name="Goyea E."/>
            <person name="Hou S."/>
            <person name="Levy A."/>
            <person name="Martinka S."/>
            <person name="Mead K."/>
            <person name="McLellan M.D."/>
            <person name="Meyer R."/>
            <person name="Randall-Maher J."/>
            <person name="Tomlinson C."/>
            <person name="Dauphin-Kohlberg S."/>
            <person name="Kozlowicz-Reilly A."/>
            <person name="Shah N."/>
            <person name="Swearengen-Shahid S."/>
            <person name="Snider J."/>
            <person name="Strong J.T."/>
            <person name="Thompson J."/>
            <person name="Yoakum M."/>
            <person name="Leonard S."/>
            <person name="Pearman C."/>
            <person name="Trani L."/>
            <person name="Radionenko M."/>
            <person name="Waligorski J.E."/>
            <person name="Wang C."/>
            <person name="Rock S.M."/>
            <person name="Tin-Wollam A.-M."/>
            <person name="Maupin R."/>
            <person name="Latreille P."/>
            <person name="Wendl M.C."/>
            <person name="Yang S.-P."/>
            <person name="Pohl C."/>
            <person name="Wallis J.W."/>
            <person name="Spieth J."/>
            <person name="Bieri T.A."/>
            <person name="Berkowicz N."/>
            <person name="Nelson J.O."/>
            <person name="Osborne J."/>
            <person name="Ding L."/>
            <person name="Meyer R."/>
            <person name="Sabo A."/>
            <person name="Shotland Y."/>
            <person name="Sinha P."/>
            <person name="Wohldmann P.E."/>
            <person name="Cook L.L."/>
            <person name="Hickenbotham M.T."/>
            <person name="Eldred J."/>
            <person name="Williams D."/>
            <person name="Jones T.A."/>
            <person name="She X."/>
            <person name="Ciccarelli F.D."/>
            <person name="Izaurralde E."/>
            <person name="Taylor J."/>
            <person name="Schmutz J."/>
            <person name="Myers R.M."/>
            <person name="Cox D.R."/>
            <person name="Huang X."/>
            <person name="McPherson J.D."/>
            <person name="Mardis E.R."/>
            <person name="Clifton S.W."/>
            <person name="Warren W.C."/>
            <person name="Chinwalla A.T."/>
            <person name="Eddy S.R."/>
            <person name="Marra M.A."/>
            <person name="Ovcharenko I."/>
            <person name="Furey T.S."/>
            <person name="Miller W."/>
            <person name="Eichler E.E."/>
            <person name="Bork P."/>
            <person name="Suyama M."/>
            <person name="Torrents D."/>
            <person name="Waterston R.H."/>
            <person name="Wilson R.K."/>
        </authorList>
    </citation>
    <scope>NUCLEOTIDE SEQUENCE [LARGE SCALE GENOMIC DNA]</scope>
</reference>
<reference key="4">
    <citation type="journal article" date="1994" name="Somat. Cell Mol. Genet.">
        <title>Structure and expression of the Huntington's disease gene: evidence against simple inactivation due to an expanded CAG repeat.</title>
        <authorList>
            <person name="Ambrose C.M."/>
            <person name="Duyao M.P."/>
            <person name="Barnes G."/>
            <person name="Bates G.P."/>
            <person name="Lin C.S."/>
            <person name="Srinidhi J."/>
            <person name="Baxendale S."/>
            <person name="Hummerich H."/>
            <person name="Lehrach H."/>
            <person name="Altherr M."/>
            <person name="Wasmuth J."/>
            <person name="Buckler A."/>
            <person name="Church D."/>
            <person name="Housman D."/>
            <person name="Berks M."/>
            <person name="Micklem G."/>
            <person name="Durbin R."/>
            <person name="Dodge A."/>
            <person name="Read A."/>
            <person name="Gusella J.F."/>
            <person name="Macdonald M.E."/>
        </authorList>
    </citation>
    <scope>NUCLEOTIDE SEQUENCE [GENOMIC DNA] OF 1-203</scope>
</reference>
<reference key="5">
    <citation type="journal article" date="1995" name="Genomics">
        <title>Structural analysis of the 5' region of mouse and human Huntington disease genes reveals conservation of putative promoter region and di- and trinucleotide polymorphisms.</title>
        <authorList>
            <person name="Lin B."/>
            <person name="Nasir J."/>
            <person name="Kalchman M.A."/>
            <person name="McDonald H."/>
            <person name="Zeisler J."/>
            <person name="Goldberg Y.P."/>
            <person name="Hayden M.R."/>
        </authorList>
    </citation>
    <scope>NUCLEOTIDE SEQUENCE [GENOMIC DNA] OF 1-88</scope>
</reference>
<reference key="6">
    <citation type="journal article" date="1993" name="Hum. Mol. Genet.">
        <title>Differential 3' polyadenylation of the Huntington disease gene results in two mRNA species with variable tissue expression.</title>
        <authorList>
            <person name="Lin B."/>
            <person name="Rommens J.M."/>
            <person name="Graham R.K."/>
            <person name="Kalchman M."/>
            <person name="Macdonald H."/>
            <person name="Nasir J."/>
            <person name="Delaney A."/>
            <person name="Goldberg Y.P."/>
            <person name="Hayden M.R."/>
        </authorList>
    </citation>
    <scope>NUCLEOTIDE SEQUENCE [MRNA] OF 2561-3142</scope>
    <scope>VARIANT ILE-2786</scope>
    <source>
        <tissue>Brain</tissue>
        <tissue>Caudate nucleus</tissue>
        <tissue>Frontal cortex</tissue>
        <tissue>Muscle</tissue>
        <tissue>Retina</tissue>
    </source>
</reference>
<reference key="7">
    <citation type="journal article" date="1995" name="Nat. Genet.">
        <title>Cellular localization of the Huntington's disease protein and discrimination of the normal and mutated form.</title>
        <authorList>
            <person name="Trottier Y."/>
            <person name="Devys D."/>
            <person name="Imbert G."/>
            <person name="Saudou F."/>
            <person name="An I."/>
            <person name="Lutz Y."/>
            <person name="Weber C."/>
            <person name="Agid Y."/>
            <person name="Hirsch E.C."/>
            <person name="Mandel J.-L."/>
        </authorList>
    </citation>
    <scope>SUBCELLULAR LOCATION</scope>
</reference>
<reference key="8">
    <citation type="journal article" date="1996" name="Nat. Genet.">
        <title>Cleavage of huntingtin by apopain, a proapoptotic cysteine protease, is modulated by the polyglutamine tract.</title>
        <authorList>
            <person name="Goldberg Y.P."/>
            <person name="Nicholson D.W."/>
            <person name="Rasper D.M."/>
            <person name="Kalchman M.A."/>
            <person name="Koide H.B."/>
            <person name="Graham R.K."/>
            <person name="Bromm M."/>
            <person name="Kazemi-Esfarjani P."/>
            <person name="Thornberry N.A."/>
            <person name="Vaillancourt J.P."/>
            <person name="Hayden M.R."/>
        </authorList>
    </citation>
    <scope>PROTEOLYTIC CLEAVAGE BY CASPASE-3</scope>
</reference>
<reference key="9">
    <citation type="journal article" date="1998" name="J. Biol. Chem.">
        <title>Caspase cleavage of gene products associated with triplet expansion disorders generates truncated fragments containing the polyglutamine tract.</title>
        <authorList>
            <person name="Wellington C.L."/>
            <person name="Ellerby L.M."/>
            <person name="Hackam A.S."/>
            <person name="Margolis R.L."/>
            <person name="Trifiro M.A."/>
            <person name="Singaraja R."/>
            <person name="McCutcheon K."/>
            <person name="Salvesen G.S."/>
            <person name="Propp S.S."/>
            <person name="Bromm M."/>
            <person name="Rowland K.J."/>
            <person name="Zhang T."/>
            <person name="Rasper D."/>
            <person name="Roy S."/>
            <person name="Thornberry N."/>
            <person name="Pinsky L."/>
            <person name="Kakizuka A."/>
            <person name="Ross C.A."/>
            <person name="Nicholson D.W."/>
            <person name="Bredesen D.E."/>
            <person name="Hayden M.R."/>
        </authorList>
    </citation>
    <scope>PROTEOLYTIC CLEAVAGE BY CASPASE-3 AT ASP-511</scope>
    <scope>MUTAGENESIS OF ASP-511 AND ASP-528</scope>
</reference>
<reference key="10">
    <citation type="journal article" date="1998" name="Hum. Mol. Genet.">
        <title>Huntingtin interacts with a family of WW domain proteins.</title>
        <authorList>
            <person name="Faber P.W."/>
            <person name="Barnes G.T."/>
            <person name="Srinidhi J."/>
            <person name="Chen J."/>
            <person name="Gusella J.F."/>
            <person name="MacDonald M.E."/>
        </authorList>
    </citation>
    <scope>INTERACTION WITH PRPF40A AND SETD2</scope>
</reference>
<reference key="11">
    <citation type="journal article" date="1999" name="Hum. Mol. Genet.">
        <title>PQBP-1, a novel polyglutamine tract binding protein, inhibits transcription activation by Brn-2 and affects cell survival.</title>
        <authorList>
            <person name="Waragai M."/>
            <person name="Lammers C.-H."/>
            <person name="Takeuchi S."/>
            <person name="Imafuku I."/>
            <person name="Udagawa Y."/>
            <person name="Kanazawa I."/>
            <person name="Kawabata M."/>
            <person name="Mouradian M.M."/>
            <person name="Okazawa H."/>
        </authorList>
    </citation>
    <scope>INTERACTION WITH PQBP1</scope>
    <source>
        <tissue>Brain</tissue>
    </source>
</reference>
<reference key="12">
    <citation type="journal article" date="2000" name="J. Biol. Chem.">
        <title>Inhibiting caspase cleavage of huntingtin reduces toxicity and aggregate formation in neuronal and nonneuronal cells.</title>
        <authorList>
            <person name="Wellington C.L."/>
            <person name="Singaraja R."/>
            <person name="Ellerby L."/>
            <person name="Savill J."/>
            <person name="Roy S."/>
            <person name="Leavitt B."/>
            <person name="Cattaneo E."/>
            <person name="Hackam A."/>
            <person name="Sharp A."/>
            <person name="Thornberry N."/>
            <person name="Nicholson D.W."/>
            <person name="Bredesen D.E."/>
            <person name="Hayden M.R."/>
        </authorList>
    </citation>
    <scope>PROTEOLYTIC CLEAVAGE BY CASPASE-6 AT ASP-584</scope>
    <scope>MUTAGENESIS OF ASP-584</scope>
</reference>
<reference key="13">
    <citation type="journal article" date="2000" name="Hum. Mol. Genet.">
        <title>Huntingtin's WW domain partners in Huntington's disease post-mortem brain fulfill genetic criteria for direct involvement in Huntington's disease pathogenesis.</title>
        <authorList>
            <person name="Passani L.A."/>
            <person name="Bedford M.T."/>
            <person name="Faber P.W."/>
            <person name="McGinnis K.M."/>
            <person name="Sharp A.H."/>
            <person name="Gusella J.F."/>
            <person name="Vonsattel J.-P."/>
            <person name="MacDonald M.E."/>
        </authorList>
    </citation>
    <scope>INTERACTION WITH SETD2</scope>
</reference>
<reference key="14">
    <citation type="journal article" date="2001" name="Mol. Cell. Neurosci.">
        <title>Identification of the full-length huntingtin-interacting protein p231HBP/HYPB as a DNA-binding factor.</title>
        <authorList>
            <person name="Rega S."/>
            <person name="Stiewe T."/>
            <person name="Chang D.-I."/>
            <person name="Pollmeier B."/>
            <person name="Esche H."/>
            <person name="Bardenheuer W."/>
            <person name="Marquitan G."/>
            <person name="Puetzer B.M."/>
        </authorList>
    </citation>
    <scope>INTERACTION WITH SETD2</scope>
</reference>
<reference key="15">
    <citation type="journal article" date="2003" name="Hum. Mol. Genet.">
        <title>Huntingtin contains a highly conserved nuclear export signal.</title>
        <authorList>
            <person name="Xia J."/>
            <person name="Lee D.H."/>
            <person name="Taylor J."/>
            <person name="Vandelft M."/>
            <person name="Truant R."/>
        </authorList>
    </citation>
    <scope>NUCLEAR EXPORT SIGNAL</scope>
</reference>
<reference key="16">
    <citation type="journal article" date="2005" name="Nat. Genet.">
        <title>Polyglutamine expansion of huntingtin impairs its nuclear export.</title>
        <authorList>
            <person name="Cornett J."/>
            <person name="Cao F."/>
            <person name="Wang C.E."/>
            <person name="Ross C.A."/>
            <person name="Bates G.P."/>
            <person name="Li S.H."/>
            <person name="Li X.J."/>
        </authorList>
    </citation>
    <scope>INTERACTION WITH TPR</scope>
    <scope>SUBCELLULAR LOCATION</scope>
</reference>
<reference key="17">
    <citation type="journal article" date="2005" name="NeuroMolecular Med.">
        <title>Interaction of the nuclear matrix protein NAKAP with HypA and huntingtin: implications for nuclear toxicity in Huntington's disease pathogenesis.</title>
        <authorList>
            <person name="Sayer J.A."/>
            <person name="Manczak M."/>
            <person name="Akileswaran L."/>
            <person name="Reddy P.H."/>
            <person name="Coghlan V.M."/>
        </authorList>
    </citation>
    <scope>SUBCELLULAR LOCATION</scope>
    <scope>TISSUE SPECIFICITY</scope>
</reference>
<reference key="18">
    <citation type="journal article" date="2006" name="J. Cell Biol.">
        <title>Huntingtin-HAP40 complex is a novel Rab5 effector that regulates early endosome motility and is up-regulated in Huntington's disease.</title>
        <authorList>
            <person name="Pal A."/>
            <person name="Severin F."/>
            <person name="Lommer B."/>
            <person name="Shevchenko A."/>
            <person name="Zerial M."/>
        </authorList>
    </citation>
    <scope>SUBCELLULAR LOCATION</scope>
    <scope>SUBUNIT</scope>
    <scope>IDENTIFICATION IN A COMPLEX WITH F8A1/F8A2/F8A3 AND RAB5A</scope>
    <scope>INTERACTION WITH F8A1/F8A2/F8A3</scope>
</reference>
<reference key="19">
    <citation type="journal article" date="2007" name="Exp. Cell Res.">
        <title>Ubiquitin ligase Hrd1 enhances the degradation and suppresses the toxicity of polyglutamine-expanded huntingtin.</title>
        <authorList>
            <person name="Yang H."/>
            <person name="Zhong X."/>
            <person name="Ballar P."/>
            <person name="Luo S."/>
            <person name="Shen Y."/>
            <person name="Rubinsztein D.C."/>
            <person name="Monteiro M.J."/>
            <person name="Fang S."/>
        </authorList>
    </citation>
    <scope>INTERACTION WITH SYVN</scope>
    <scope>UBIQUITINATION</scope>
</reference>
<reference key="20">
    <citation type="journal article" date="2007" name="J. Neurosci.">
        <title>Phosphorylation of huntingtin by cyclin-dependent kinase 5 is induced by DNA damage and regulates wild-type and mutant huntingtin toxicity in neurons.</title>
        <authorList>
            <person name="Anne S.L."/>
            <person name="Saudou F."/>
            <person name="Humbert S."/>
        </authorList>
    </citation>
    <scope>PHOSPHORYLATION AT SER-1179 AND SER-1199</scope>
</reference>
<reference key="21">
    <citation type="journal article" date="2008" name="J. Proteome Res.">
        <title>Phosphoproteome of resting human platelets.</title>
        <authorList>
            <person name="Zahedi R.P."/>
            <person name="Lewandrowski U."/>
            <person name="Wiesner J."/>
            <person name="Wortelkamp S."/>
            <person name="Moebius J."/>
            <person name="Schuetz C."/>
            <person name="Walter U."/>
            <person name="Gambaryan S."/>
            <person name="Sickmann A."/>
        </authorList>
    </citation>
    <scope>IDENTIFICATION BY MASS SPECTROMETRY [LARGE SCALE ANALYSIS]</scope>
    <source>
        <tissue>Platelet</tissue>
    </source>
</reference>
<reference key="22">
    <citation type="journal article" date="2008" name="Mol. Cell">
        <title>Kinase-selective enrichment enables quantitative phosphoproteomics of the kinome across the cell cycle.</title>
        <authorList>
            <person name="Daub H."/>
            <person name="Olsen J.V."/>
            <person name="Bairlein M."/>
            <person name="Gnad F."/>
            <person name="Oppermann F.S."/>
            <person name="Korner R."/>
            <person name="Greff Z."/>
            <person name="Keri G."/>
            <person name="Stemmann O."/>
            <person name="Mann M."/>
        </authorList>
    </citation>
    <scope>PHOSPHORYLATION [LARGE SCALE ANALYSIS] AT SER-1870</scope>
    <scope>IDENTIFICATION BY MASS SPECTROMETRY [LARGE SCALE ANALYSIS]</scope>
    <source>
        <tissue>Cervix carcinoma</tissue>
    </source>
</reference>
<reference key="23">
    <citation type="journal article" date="2008" name="Mol. Cell. Biol.">
        <title>Phosphorylation of profilin by ROCK1 regulates polyglutamine aggregation.</title>
        <authorList>
            <person name="Shao J."/>
            <person name="Welch W.J."/>
            <person name="Diprospero N.A."/>
            <person name="Diamond M.I."/>
        </authorList>
    </citation>
    <scope>INTERACTION WITH PFN1</scope>
</reference>
<reference key="24">
    <citation type="journal article" date="2008" name="Proc. Natl. Acad. Sci. U.S.A.">
        <title>A quantitative atlas of mitotic phosphorylation.</title>
        <authorList>
            <person name="Dephoure N."/>
            <person name="Zhou C."/>
            <person name="Villen J."/>
            <person name="Beausoleil S.A."/>
            <person name="Bakalarski C.E."/>
            <person name="Elledge S.J."/>
            <person name="Gygi S.P."/>
        </authorList>
    </citation>
    <scope>PHOSPHORYLATION [LARGE SCALE ANALYSIS] AT SER-411; SER-1870 AND SER-1874</scope>
    <scope>IDENTIFICATION BY MASS SPECTROMETRY [LARGE SCALE ANALYSIS]</scope>
    <source>
        <tissue>Cervix carcinoma</tissue>
    </source>
</reference>
<reference key="25">
    <citation type="journal article" date="2009" name="Anal. Chem.">
        <title>Lys-N and trypsin cover complementary parts of the phosphoproteome in a refined SCX-based approach.</title>
        <authorList>
            <person name="Gauci S."/>
            <person name="Helbig A.O."/>
            <person name="Slijper M."/>
            <person name="Krijgsveld J."/>
            <person name="Heck A.J."/>
            <person name="Mohammed S."/>
        </authorList>
    </citation>
    <scope>IDENTIFICATION BY MASS SPECTROMETRY [LARGE SCALE ANALYSIS]</scope>
</reference>
<reference key="26">
    <citation type="journal article" date="2009" name="Sci. Signal.">
        <title>Quantitative phosphoproteomic analysis of T cell receptor signaling reveals system-wide modulation of protein-protein interactions.</title>
        <authorList>
            <person name="Mayya V."/>
            <person name="Lundgren D.H."/>
            <person name="Hwang S.-I."/>
            <person name="Rezaul K."/>
            <person name="Wu L."/>
            <person name="Eng J.K."/>
            <person name="Rodionov V."/>
            <person name="Han D.K."/>
        </authorList>
    </citation>
    <scope>PHOSPHORYLATION [LARGE SCALE ANALYSIS] AT SER-432 AND SER-1874</scope>
    <scope>IDENTIFICATION BY MASS SPECTROMETRY [LARGE SCALE ANALYSIS]</scope>
    <source>
        <tissue>Leukemic T-cell</tissue>
    </source>
</reference>
<reference key="27">
    <citation type="journal article" date="2010" name="Sci. Signal.">
        <title>Quantitative phosphoproteomics reveals widespread full phosphorylation site occupancy during mitosis.</title>
        <authorList>
            <person name="Olsen J.V."/>
            <person name="Vermeulen M."/>
            <person name="Santamaria A."/>
            <person name="Kumar C."/>
            <person name="Miller M.L."/>
            <person name="Jensen L.J."/>
            <person name="Gnad F."/>
            <person name="Cox J."/>
            <person name="Jensen T.S."/>
            <person name="Nigg E.A."/>
            <person name="Brunak S."/>
            <person name="Mann M."/>
        </authorList>
    </citation>
    <scope>PHOSPHORYLATION [LARGE SCALE ANALYSIS] AT SER-1870 AND SER-1874</scope>
    <scope>IDENTIFICATION BY MASS SPECTROMETRY [LARGE SCALE ANALYSIS]</scope>
    <source>
        <tissue>Cervix carcinoma</tissue>
    </source>
</reference>
<reference key="28">
    <citation type="journal article" date="2011" name="BMC Syst. Biol.">
        <title>Initial characterization of the human central proteome.</title>
        <authorList>
            <person name="Burkard T.R."/>
            <person name="Planyavsky M."/>
            <person name="Kaupe I."/>
            <person name="Breitwieser F.P."/>
            <person name="Buerckstuemmer T."/>
            <person name="Bennett K.L."/>
            <person name="Superti-Furga G."/>
            <person name="Colinge J."/>
        </authorList>
    </citation>
    <scope>IDENTIFICATION BY MASS SPECTROMETRY [LARGE SCALE ANALYSIS]</scope>
</reference>
<reference key="29">
    <citation type="journal article" date="2011" name="Mol. Cell. Proteomics">
        <title>Mass spectrometric identification of novel lysine acetylation sites in huntingtin.</title>
        <authorList>
            <person name="Cong X."/>
            <person name="Held J.M."/>
            <person name="Degiacomo F."/>
            <person name="Bonner A."/>
            <person name="Chen J.M."/>
            <person name="Schilling B."/>
            <person name="Czerwieniec G.A."/>
            <person name="Gibson B.W."/>
            <person name="Ellerby L.M."/>
        </authorList>
    </citation>
    <scope>ACETYLATION AT LYS-9; LYS-176; LYS-234; LYS-343 AND LYS-442</scope>
</reference>
<reference key="30">
    <citation type="journal article" date="2011" name="Sci. Signal.">
        <title>System-wide temporal characterization of the proteome and phosphoproteome of human embryonic stem cell differentiation.</title>
        <authorList>
            <person name="Rigbolt K.T."/>
            <person name="Prokhorova T.A."/>
            <person name="Akimov V."/>
            <person name="Henningsen J."/>
            <person name="Johansen P.T."/>
            <person name="Kratchmarova I."/>
            <person name="Kassem M."/>
            <person name="Mann M."/>
            <person name="Olsen J.V."/>
            <person name="Blagoev B."/>
        </authorList>
    </citation>
    <scope>IDENTIFICATION BY MASS SPECTROMETRY [LARGE SCALE ANALYSIS]</scope>
</reference>
<reference key="31">
    <citation type="journal article" date="2013" name="J. Proteome Res.">
        <title>Toward a comprehensive characterization of a human cancer cell phosphoproteome.</title>
        <authorList>
            <person name="Zhou H."/>
            <person name="Di Palma S."/>
            <person name="Preisinger C."/>
            <person name="Peng M."/>
            <person name="Polat A.N."/>
            <person name="Heck A.J."/>
            <person name="Mohammed S."/>
        </authorList>
    </citation>
    <scope>PHOSPHORYLATION [LARGE SCALE ANALYSIS] AT SER-640; SER-643; SER-1199 AND SER-1874</scope>
    <scope>IDENTIFICATION BY MASS SPECTROMETRY [LARGE SCALE ANALYSIS]</scope>
    <source>
        <tissue>Cervix carcinoma</tissue>
        <tissue>Erythroleukemia</tissue>
    </source>
</reference>
<reference key="32">
    <citation type="journal article" date="2014" name="J. Proteomics">
        <title>An enzyme assisted RP-RPLC approach for in-depth analysis of human liver phosphoproteome.</title>
        <authorList>
            <person name="Bian Y."/>
            <person name="Song C."/>
            <person name="Cheng K."/>
            <person name="Dong M."/>
            <person name="Wang F."/>
            <person name="Huang J."/>
            <person name="Sun D."/>
            <person name="Wang L."/>
            <person name="Ye M."/>
            <person name="Zou H."/>
        </authorList>
    </citation>
    <scope>PHOSPHORYLATION [LARGE SCALE ANALYSIS] AT SER-432</scope>
    <scope>IDENTIFICATION BY MASS SPECTROMETRY [LARGE SCALE ANALYSIS]</scope>
    <source>
        <tissue>Liver</tissue>
    </source>
</reference>
<reference key="33">
    <citation type="journal article" date="2015" name="J. Biol. Chem.">
        <title>Identification of a novel sequence motif recognized by the ankyrin repeat domain of zDHHC17/13 S-acyltransferases.</title>
        <authorList>
            <person name="Lemonidis K."/>
            <person name="Sanchez-Perez M.C."/>
            <person name="Chamberlain L.H."/>
        </authorList>
    </citation>
    <scope>INTERACTION WITH ZDHHC17 AND ZDHHC13</scope>
    <scope>MUTAGENESIS OF ILE-495; GLN-498 AND PRO-499</scope>
</reference>
<reference key="34">
    <citation type="journal article" date="2017" name="J. Biol. Chem.">
        <title>Peptide array based screening reveals a large number of proteins interacting with the ankyrin repeat domain of the zDHHC17 S-acyltransferase.</title>
        <authorList>
            <person name="Lemonidis K."/>
            <person name="MacLeod R."/>
            <person name="Baillie G.S."/>
            <person name="Chamberlain L.H."/>
        </authorList>
    </citation>
    <scope>INTERACTION WITH ZDHHC17</scope>
</reference>
<reference key="35">
    <citation type="journal article" date="2017" name="Structure">
        <title>Structural basis for substrate recognition by the ankyrin repeat domain of human DHHC17 palmitoyltransferase.</title>
        <authorList>
            <person name="Verardi R."/>
            <person name="Kim J.S."/>
            <person name="Ghirlando R."/>
            <person name="Banerjee A."/>
        </authorList>
    </citation>
    <scope>INTERACTION WITH ZDHHC17</scope>
    <scope>MUTAGENESIS OF 498-GLN-PRO-499</scope>
</reference>
<reference key="36">
    <citation type="journal article" date="2014" name="Hum. Mol. Genet.">
        <title>Identification of a post-translationally myristoylated autophagy-inducing domain released by caspase cleavage of huntingtin.</title>
        <authorList>
            <person name="Martin D.D."/>
            <person name="Heit R.J."/>
            <person name="Yap M.C."/>
            <person name="Davidson M.W."/>
            <person name="Hayden M.R."/>
            <person name="Berthiaume L.G."/>
        </authorList>
    </citation>
    <scope>FUNCTION</scope>
    <scope>SUBCELLULAR LOCATION</scope>
    <scope>MYRISTOYLATION AT GLY-551</scope>
    <scope>MUTAGENESIS OF GLY-551</scope>
</reference>
<reference key="37">
    <citation type="journal article" date="2018" name="Sci. Rep.">
        <title>A human huntingtin SNP alters post-translational modification and pathogenic proteolysis of the protein causing Huntington disease.</title>
        <authorList>
            <person name="Martin D.D.O."/>
            <person name="Kay C."/>
            <person name="Collins J.A."/>
            <person name="Nguyen Y.T."/>
            <person name="Slama R.A."/>
            <person name="Hayden M.R."/>
        </authorList>
    </citation>
    <scope>PROTEOLYTIC CLEAVAGE AT ASP-550</scope>
    <scope>MYRISTOYLATION AT GLY-551</scope>
    <scope>MUTAGENESIS OF ASP-550 AND GLY-551</scope>
    <scope>CHARACTERIZATION OF VARIANT GLU-551</scope>
</reference>
<reference evidence="34 35 36 37 38 39 40" key="38">
    <citation type="journal article" date="2009" name="Structure">
        <title>Secondary structure of Huntingtin amino-terminal region.</title>
        <authorList>
            <person name="Kim M.W."/>
            <person name="Chelliah Y."/>
            <person name="Kim S.W."/>
            <person name="Otwinowski Z."/>
            <person name="Bezprozvanny I."/>
        </authorList>
    </citation>
    <scope>X-RAY CRYSTALLOGRAPHY (3.5 ANGSTROMS) OF 1-64</scope>
    <scope>DOMAIN</scope>
</reference>
<reference evidence="41" key="39">
    <citation type="journal article" date="2011" name="J. Mol. Biol.">
        <title>A disulfide-free single-domain V(L) intrabody with blocking activity towards huntingtin reveals a novel mode of epitope recognition.</title>
        <authorList>
            <person name="Schiefner A."/>
            <person name="Chatwell L."/>
            <person name="Korner J."/>
            <person name="Neumaier I."/>
            <person name="Colby D.W."/>
            <person name="Volkmer R."/>
            <person name="Wittrup K.D."/>
            <person name="Skerra A."/>
        </authorList>
    </citation>
    <scope>X-RAY CRYSTALLOGRAPHY (2.60 ANGSTROMS) OF 5-18</scope>
</reference>
<reference evidence="32 33" key="40">
    <citation type="journal article" date="2013" name="Biophys. J.">
        <title>Structure and topology of the huntingtin 1-17 membrane anchor by a combined solution and solid-state NMR approach.</title>
        <authorList>
            <person name="Michalek M."/>
            <person name="Salnikov E.S."/>
            <person name="Bechinger B."/>
        </authorList>
    </citation>
    <scope>STRUCTURE BY NMR OF 1-17</scope>
</reference>
<reference evidence="42 43 44 45" key="41">
    <citation type="journal article" date="2013" name="Prion">
        <title>Beta conformation of polyglutamine track revealed by a crystal structure of Huntingtin N-terminal region with insertion of three histidine residues.</title>
        <authorList>
            <person name="Kim M."/>
        </authorList>
    </citation>
    <scope>X-RAY CRYSTALLOGRAPHY (2.80 ANGSTROMS) OF 1-64</scope>
</reference>
<reference evidence="46" key="42">
    <citation type="journal article" date="2015" name="J. Mol. Biol.">
        <title>Structure of a single-chain Fv bound to the 17 N-terminal residues of huntingtin provides insights into pathogenic amyloid formation and suppression.</title>
        <authorList>
            <person name="De Genst E."/>
            <person name="Chirgadze D.Y."/>
            <person name="Klein F.A."/>
            <person name="Butler D.C."/>
            <person name="Matak-Vinkovic D."/>
            <person name="Trottier Y."/>
            <person name="Huston J.S."/>
            <person name="Messer A."/>
            <person name="Dobson C.M."/>
        </authorList>
    </citation>
    <scope>X-RAY CRYSTALLOGRAPHY (2.50 ANGSTROMS) OF 1-17</scope>
</reference>
<reference evidence="47" key="43">
    <citation type="journal article" date="2018" name="Nature">
        <title>The cryo-electron microscopy structure of huntingtin.</title>
        <authorList>
            <person name="Guo Q."/>
            <person name="Huang B."/>
            <person name="Cheng J."/>
            <person name="Seefelder M."/>
            <person name="Engler T."/>
            <person name="Pfeifer G."/>
            <person name="Oeckl P."/>
            <person name="Otto M."/>
            <person name="Moser F."/>
            <person name="Maurer M."/>
            <person name="Pautsch A."/>
            <person name="Baumeister W."/>
            <person name="Fernandez-Busnadiego R."/>
            <person name="Kochanek S."/>
        </authorList>
    </citation>
    <scope>STRUCTURE BY ELECTRON MICROSCOPY (4.00 ANGSTROMS) IN COMPLEX WITH F8A1/F8A2/F8A3</scope>
    <scope>INTERACTION WITH F8A1/F8A2/F8A3</scope>
</reference>
<reference key="44">
    <citation type="journal article" date="2016" name="Eur. J. Hum. Genet.">
        <title>A novel neurodevelopmental disorder associated with compound heterozygous variants in the huntingtin gene.</title>
        <authorList>
            <person name="Rodan L.H."/>
            <person name="Cohen J."/>
            <person name="Fatemi A."/>
            <person name="Gillis T."/>
            <person name="Lucente D."/>
            <person name="Gusella J."/>
            <person name="Picker J.D."/>
        </authorList>
    </citation>
    <scope>INVOLVEMENT IN LOMARS</scope>
    <scope>VARIANT LOMARS LEU-2717</scope>
</reference>
<reference key="45">
    <citation type="journal article" date="2016" name="J. Med. Genet.">
        <title>Identification of novel genetic causes of Rett syndrome-like phenotypes.</title>
        <authorList>
            <person name="Lopes F."/>
            <person name="Barbosa M."/>
            <person name="Ameur A."/>
            <person name="Soares G."/>
            <person name="de Sa J."/>
            <person name="Dias A.I."/>
            <person name="Oliveira G."/>
            <person name="Cabral P."/>
            <person name="Temudo T."/>
            <person name="Calado E."/>
            <person name="Cruz I.F."/>
            <person name="Vieira J.P."/>
            <person name="Oliveira R."/>
            <person name="Esteves S."/>
            <person name="Sauer S."/>
            <person name="Jonasson I."/>
            <person name="Syvaenen A.C."/>
            <person name="Gyllensten U."/>
            <person name="Pinto D."/>
            <person name="Maciel P."/>
        </authorList>
    </citation>
    <scope>VARIANT LOMARS LEU-703</scope>
    <scope>VARIANT MET-1260</scope>
</reference>
<organism>
    <name type="scientific">Homo sapiens</name>
    <name type="common">Human</name>
    <dbReference type="NCBI Taxonomy" id="9606"/>
    <lineage>
        <taxon>Eukaryota</taxon>
        <taxon>Metazoa</taxon>
        <taxon>Chordata</taxon>
        <taxon>Craniata</taxon>
        <taxon>Vertebrata</taxon>
        <taxon>Euteleostomi</taxon>
        <taxon>Mammalia</taxon>
        <taxon>Eutheria</taxon>
        <taxon>Euarchontoglires</taxon>
        <taxon>Primates</taxon>
        <taxon>Haplorrhini</taxon>
        <taxon>Catarrhini</taxon>
        <taxon>Hominidae</taxon>
        <taxon>Homo</taxon>
    </lineage>
</organism>
<gene>
    <name type="primary">HTT</name>
    <name type="synonym">HD</name>
    <name type="synonym">IT15</name>
</gene>
<name>HD_HUMAN</name>
<accession>P42858</accession>
<accession>Q9UQB7</accession>
<feature type="chain" id="PRO_0000083942" description="Huntingtin">
    <location>
        <begin position="1"/>
        <end position="3142"/>
    </location>
</feature>
<feature type="chain" id="PRO_0000447477" description="Huntingtin, myristoylated N-terminal fragment">
    <location>
        <begin position="551"/>
        <end position="584"/>
    </location>
</feature>
<feature type="repeat" description="HEAT 1">
    <location>
        <begin position="204"/>
        <end position="241"/>
    </location>
</feature>
<feature type="repeat" description="HEAT 2">
    <location>
        <begin position="246"/>
        <end position="283"/>
    </location>
</feature>
<feature type="repeat" description="HEAT 3">
    <location>
        <begin position="316"/>
        <end position="360"/>
    </location>
</feature>
<feature type="repeat" description="HEAT 4">
    <location>
        <begin position="802"/>
        <end position="839"/>
    </location>
</feature>
<feature type="repeat" description="HEAT 5">
    <location>
        <begin position="902"/>
        <end position="940"/>
    </location>
</feature>
<feature type="region of interest" description="Sufficient for interaction with TPR" evidence="9">
    <location>
        <begin position="3"/>
        <end position="13"/>
    </location>
</feature>
<feature type="region of interest" description="Disordered" evidence="4">
    <location>
        <begin position="14"/>
        <end position="85"/>
    </location>
</feature>
<feature type="region of interest" description="Disordered" evidence="4">
    <location>
        <begin position="447"/>
        <end position="469"/>
    </location>
</feature>
<feature type="region of interest" description="Interaction with ZDHHC17" evidence="21">
    <location>
        <begin position="491"/>
        <end position="502"/>
    </location>
</feature>
<feature type="region of interest" description="Disordered" evidence="4">
    <location>
        <begin position="517"/>
        <end position="583"/>
    </location>
</feature>
<feature type="region of interest" description="Disordered" evidence="4">
    <location>
        <begin position="1176"/>
        <end position="1225"/>
    </location>
</feature>
<feature type="region of interest" description="Disordered" evidence="4">
    <location>
        <begin position="2330"/>
        <end position="2351"/>
    </location>
</feature>
<feature type="region of interest" description="Disordered" evidence="4">
    <location>
        <begin position="2633"/>
        <end position="2662"/>
    </location>
</feature>
<feature type="short sequence motif" description="Nuclear export signal" evidence="1">
    <location>
        <begin position="2395"/>
        <end position="2404"/>
    </location>
</feature>
<feature type="compositionally biased region" description="Low complexity" evidence="4">
    <location>
        <begin position="18"/>
        <end position="37"/>
    </location>
</feature>
<feature type="compositionally biased region" description="Pro residues" evidence="4">
    <location>
        <begin position="38"/>
        <end position="78"/>
    </location>
</feature>
<feature type="compositionally biased region" description="Low complexity" evidence="4">
    <location>
        <begin position="531"/>
        <end position="545"/>
    </location>
</feature>
<feature type="compositionally biased region" description="Polar residues" evidence="4">
    <location>
        <begin position="550"/>
        <end position="579"/>
    </location>
</feature>
<feature type="compositionally biased region" description="Polar residues" evidence="4">
    <location>
        <begin position="1207"/>
        <end position="1225"/>
    </location>
</feature>
<feature type="compositionally biased region" description="Acidic residues" evidence="4">
    <location>
        <begin position="2634"/>
        <end position="2645"/>
    </location>
</feature>
<feature type="site" description="Cleavage; by caspase-3" evidence="29">
    <location>
        <begin position="511"/>
        <end position="512"/>
    </location>
</feature>
<feature type="site" description="Cleavage; by caspase-3" evidence="3">
    <location>
        <begin position="528"/>
        <end position="529"/>
    </location>
</feature>
<feature type="site" description="Cleavage; by caspase-3" evidence="24">
    <location>
        <begin position="550"/>
        <end position="551"/>
    </location>
</feature>
<feature type="site" description="Cleavage; by caspase-6" evidence="6">
    <location>
        <begin position="584"/>
        <end position="585"/>
    </location>
</feature>
<feature type="site" description="Cleavage; by caspase-3" evidence="3">
    <location>
        <begin position="587"/>
        <end position="588"/>
    </location>
</feature>
<feature type="modified residue" description="N6-acetyllysine" evidence="16">
    <location>
        <position position="9"/>
    </location>
</feature>
<feature type="modified residue" description="N6-acetyllysine" evidence="16">
    <location>
        <position position="176"/>
    </location>
</feature>
<feature type="modified residue" description="N6-acetyllysine" evidence="16">
    <location>
        <position position="234"/>
    </location>
</feature>
<feature type="modified residue" description="N6-acetyllysine" evidence="16">
    <location>
        <position position="343"/>
    </location>
</feature>
<feature type="modified residue" description="Phosphoserine" evidence="48">
    <location>
        <position position="411"/>
    </location>
</feature>
<feature type="modified residue" description="Phosphoserine" evidence="2">
    <location>
        <position position="417"/>
    </location>
</feature>
<feature type="modified residue" description="Phosphoserine" evidence="2">
    <location>
        <position position="419"/>
    </location>
</feature>
<feature type="modified residue" description="Phosphoserine" evidence="50 53">
    <location>
        <position position="432"/>
    </location>
</feature>
<feature type="modified residue" description="N6-acetyllysine" evidence="16">
    <location>
        <position position="442"/>
    </location>
</feature>
<feature type="modified residue" description="Phosphoserine" evidence="52">
    <location>
        <position position="640"/>
    </location>
</feature>
<feature type="modified residue" description="Phosphoserine" evidence="52">
    <location>
        <position position="643"/>
    </location>
</feature>
<feature type="modified residue" description="Phosphoserine; by CDK5" evidence="13">
    <location>
        <position position="1179"/>
    </location>
</feature>
<feature type="modified residue" description="Phosphoserine; by CDK5" evidence="13 52">
    <location>
        <position position="1199"/>
    </location>
</feature>
<feature type="modified residue" description="Phosphoserine" evidence="48 49 51">
    <location>
        <position position="1870"/>
    </location>
</feature>
<feature type="modified residue" description="Phosphoserine" evidence="48 50 51 52">
    <location>
        <position position="1874"/>
    </location>
</feature>
<feature type="lipid moiety-binding region" description="N-myristoyl glycine" evidence="17 24">
    <location>
        <position position="551"/>
    </location>
</feature>
<feature type="sequence variant" id="VAR_005268">
    <original>Q</original>
    <variation>QQQ</variation>
    <location>
        <position position="18"/>
    </location>
</feature>
<feature type="sequence variant" id="VAR_081737" description="Inhibits proteolytic cleavage at D-550; abolishes post-translational myristoylation; results in increased cleavage at D-511; dbSNP:rs118005095." evidence="24">
    <original>G</original>
    <variation>E</variation>
    <location>
        <position position="551"/>
    </location>
</feature>
<feature type="sequence variant" id="VAR_079026" description="In LOMARS; dbSNP:rs768047421." evidence="19">
    <original>P</original>
    <variation>L</variation>
    <location>
        <position position="703"/>
    </location>
</feature>
<feature type="sequence variant" id="VAR_060170" description="In dbSNP:rs363075.">
    <original>G</original>
    <variation>R</variation>
    <location>
        <position position="893"/>
    </location>
</feature>
<feature type="sequence variant" id="VAR_060171" description="In dbSNP:rs35892913.">
    <original>V</original>
    <variation>I</variation>
    <location>
        <position position="1064"/>
    </location>
</feature>
<feature type="sequence variant" id="VAR_060172" description="In dbSNP:rs1143646.">
    <original>I</original>
    <variation>M</variation>
    <location>
        <position position="1091"/>
    </location>
</feature>
<feature type="sequence variant" id="VAR_060173" description="In dbSNP:rs3025843.">
    <original>T</original>
    <variation>A</variation>
    <location>
        <position position="1173"/>
    </location>
</feature>
<feature type="sequence variant" id="VAR_060174" description="Found in a patient with Rett syndrome-like phenotype; uncertain significance; dbSNP:rs34315806." evidence="19">
    <original>T</original>
    <variation>M</variation>
    <location>
        <position position="1260"/>
    </location>
</feature>
<feature type="sequence variant" id="VAR_054017" description="In dbSNP:rs3025837.">
    <original>E</original>
    <variation>A</variation>
    <location>
        <position position="1382"/>
    </location>
</feature>
<feature type="sequence variant" id="VAR_060175" description="In dbSNP:rs3025837.">
    <original>N</original>
    <variation>H</variation>
    <location>
        <position position="1385"/>
    </location>
</feature>
<feature type="sequence variant" id="VAR_060176" description="In dbSNP:rs363125.">
    <original>T</original>
    <variation>N</variation>
    <location>
        <position position="1720"/>
    </location>
</feature>
<feature type="sequence variant" id="VAR_060177" description="In dbSNP:rs1143648.">
    <original>D</original>
    <variation>Y</variation>
    <location>
        <position position="2113"/>
    </location>
</feature>
<feature type="sequence variant" id="VAR_060178" description="In dbSNP:rs362331.">
    <original>Y</original>
    <variation>H</variation>
    <location>
        <position position="2309"/>
    </location>
</feature>
<feature type="sequence variant" id="VAR_079027" description="In LOMARS; dbSNP:rs1085307052." evidence="20">
    <original>F</original>
    <variation>L</variation>
    <location>
        <position position="2717"/>
    </location>
</feature>
<feature type="sequence variant" id="VAR_060179" description="In dbSNP:rs362272." evidence="26">
    <original>V</original>
    <variation>I</variation>
    <location>
        <position position="2786"/>
    </location>
</feature>
<feature type="mutagenesis site" description="Inhibits interaction with ZDHHC13 and ZDHHC17." evidence="18">
    <original>I</original>
    <variation>A</variation>
    <location>
        <position position="495"/>
    </location>
</feature>
<feature type="mutagenesis site" description="Abolishes interaction with ZDHHC17." evidence="21">
    <original>QP</original>
    <variation>AA</variation>
    <location>
        <begin position="498"/>
        <end position="499"/>
    </location>
</feature>
<feature type="mutagenesis site" description="Inhibits interaction with ZDHHC13 and ZDHHC17." evidence="18">
    <original>Q</original>
    <variation>A</variation>
    <location>
        <position position="498"/>
    </location>
</feature>
<feature type="mutagenesis site" description="Inhibits interaction with ZDHHC13 and ZDHHC17." evidence="18">
    <original>P</original>
    <variation>A</variation>
    <location>
        <position position="499"/>
    </location>
</feature>
<feature type="mutagenesis site" description="Loss of proteolytic cleavage." evidence="29">
    <original>D</original>
    <variation>A</variation>
    <location>
        <position position="511"/>
    </location>
</feature>
<feature type="mutagenesis site" description="No effect on proteolytic cleavage." evidence="29">
    <original>D</original>
    <variation>A</variation>
    <location>
        <position position="528"/>
    </location>
</feature>
<feature type="mutagenesis site" description="Loss of proteolytic cleavage. Loss of myristoylation." evidence="24">
    <original>D</original>
    <variation>E</variation>
    <location>
        <position position="550"/>
    </location>
</feature>
<feature type="mutagenesis site" description="Loss of myristoylation." evidence="17 24">
    <original>G</original>
    <variation>A</variation>
    <location>
        <position position="551"/>
    </location>
</feature>
<feature type="mutagenesis site" description="Loss of myristoylation." evidence="24">
    <original>G</original>
    <variation>S</variation>
    <location>
        <position position="551"/>
    </location>
</feature>
<feature type="mutagenesis site" description="Loss of proteolytic cleavage." evidence="6">
    <original>D</original>
    <variation>A</variation>
    <location>
        <position position="584"/>
    </location>
</feature>
<feature type="sequence conflict" description="In Ref. 2; BAA36753." evidence="31" ref="2">
    <original>C</original>
    <variation>S</variation>
    <location>
        <position position="823"/>
    </location>
</feature>
<feature type="helix" evidence="55">
    <location>
        <begin position="4"/>
        <end position="10"/>
    </location>
</feature>
<feature type="strand" evidence="55">
    <location>
        <begin position="13"/>
        <end position="15"/>
    </location>
</feature>
<feature type="helix" evidence="54">
    <location>
        <begin position="23"/>
        <end position="26"/>
    </location>
</feature>
<feature type="turn" evidence="54">
    <location>
        <begin position="30"/>
        <end position="32"/>
    </location>
</feature>
<feature type="helix" evidence="56">
    <location>
        <begin position="97"/>
        <end position="109"/>
    </location>
</feature>
<feature type="helix" evidence="56">
    <location>
        <begin position="119"/>
        <end position="132"/>
    </location>
</feature>
<feature type="helix" evidence="56">
    <location>
        <begin position="135"/>
        <end position="137"/>
    </location>
</feature>
<feature type="strand" evidence="56">
    <location>
        <begin position="139"/>
        <end position="141"/>
    </location>
</feature>
<feature type="helix" evidence="56">
    <location>
        <begin position="142"/>
        <end position="157"/>
    </location>
</feature>
<feature type="helix" evidence="56">
    <location>
        <begin position="159"/>
        <end position="175"/>
    </location>
</feature>
<feature type="helix" evidence="56">
    <location>
        <begin position="180"/>
        <end position="191"/>
    </location>
</feature>
<feature type="helix" evidence="56">
    <location>
        <begin position="192"/>
        <end position="196"/>
    </location>
</feature>
<feature type="helix" evidence="58">
    <location>
        <begin position="199"/>
        <end position="201"/>
    </location>
</feature>
<feature type="helix" evidence="56">
    <location>
        <begin position="202"/>
        <end position="217"/>
    </location>
</feature>
<feature type="helix" evidence="56">
    <location>
        <begin position="222"/>
        <end position="239"/>
    </location>
</feature>
<feature type="helix" evidence="56">
    <location>
        <begin position="240"/>
        <end position="242"/>
    </location>
</feature>
<feature type="helix" evidence="56">
    <location>
        <begin position="245"/>
        <end position="256"/>
    </location>
</feature>
<feature type="helix" evidence="56">
    <location>
        <begin position="257"/>
        <end position="260"/>
    </location>
</feature>
<feature type="helix" evidence="56">
    <location>
        <begin position="264"/>
        <end position="279"/>
    </location>
</feature>
<feature type="strand" evidence="56">
    <location>
        <begin position="281"/>
        <end position="283"/>
    </location>
</feature>
<feature type="helix" evidence="56">
    <location>
        <begin position="284"/>
        <end position="297"/>
    </location>
</feature>
<feature type="strand" evidence="56">
    <location>
        <begin position="302"/>
        <end position="304"/>
    </location>
</feature>
<feature type="helix" evidence="56">
    <location>
        <begin position="309"/>
        <end position="321"/>
    </location>
</feature>
<feature type="helix" evidence="56">
    <location>
        <begin position="322"/>
        <end position="324"/>
    </location>
</feature>
<feature type="helix" evidence="56">
    <location>
        <begin position="351"/>
        <end position="364"/>
    </location>
</feature>
<feature type="helix" evidence="56">
    <location>
        <begin position="370"/>
        <end position="385"/>
    </location>
</feature>
<feature type="helix" evidence="56">
    <location>
        <begin position="389"/>
        <end position="396"/>
    </location>
</feature>
<feature type="strand" evidence="56">
    <location>
        <begin position="397"/>
        <end position="399"/>
    </location>
</feature>
<feature type="helix" evidence="56">
    <location>
        <begin position="400"/>
        <end position="403"/>
    </location>
</feature>
<feature type="strand" evidence="56">
    <location>
        <begin position="676"/>
        <end position="678"/>
    </location>
</feature>
<feature type="helix" evidence="56">
    <location>
        <begin position="680"/>
        <end position="692"/>
    </location>
</feature>
<feature type="strand" evidence="56">
    <location>
        <begin position="696"/>
        <end position="699"/>
    </location>
</feature>
<feature type="turn" evidence="56">
    <location>
        <begin position="704"/>
        <end position="706"/>
    </location>
</feature>
<feature type="helix" evidence="56">
    <location>
        <begin position="709"/>
        <end position="725"/>
    </location>
</feature>
<feature type="helix" evidence="56">
    <location>
        <begin position="727"/>
        <end position="731"/>
    </location>
</feature>
<feature type="strand" evidence="56">
    <location>
        <begin position="732"/>
        <end position="734"/>
    </location>
</feature>
<feature type="turn" evidence="56">
    <location>
        <begin position="741"/>
        <end position="743"/>
    </location>
</feature>
<feature type="strand" evidence="58">
    <location>
        <begin position="744"/>
        <end position="746"/>
    </location>
</feature>
<feature type="helix" evidence="56">
    <location>
        <begin position="750"/>
        <end position="758"/>
    </location>
</feature>
<feature type="turn" evidence="56">
    <location>
        <begin position="762"/>
        <end position="764"/>
    </location>
</feature>
<feature type="helix" evidence="56">
    <location>
        <begin position="765"/>
        <end position="782"/>
    </location>
</feature>
<feature type="helix" evidence="56">
    <location>
        <begin position="787"/>
        <end position="797"/>
    </location>
</feature>
<feature type="helix" evidence="56">
    <location>
        <begin position="804"/>
        <end position="806"/>
    </location>
</feature>
<feature type="helix" evidence="56">
    <location>
        <begin position="808"/>
        <end position="815"/>
    </location>
</feature>
<feature type="helix" evidence="56">
    <location>
        <begin position="820"/>
        <end position="838"/>
    </location>
</feature>
<feature type="helix" evidence="56">
    <location>
        <begin position="843"/>
        <end position="853"/>
    </location>
</feature>
<feature type="helix" evidence="56">
    <location>
        <begin position="854"/>
        <end position="858"/>
    </location>
</feature>
<feature type="helix" evidence="56">
    <location>
        <begin position="862"/>
        <end position="873"/>
    </location>
</feature>
<feature type="helix" evidence="56">
    <location>
        <begin position="877"/>
        <end position="886"/>
    </location>
</feature>
<feature type="turn" evidence="56">
    <location>
        <begin position="890"/>
        <end position="893"/>
    </location>
</feature>
<feature type="helix" evidence="56">
    <location>
        <begin position="894"/>
        <end position="896"/>
    </location>
</feature>
<feature type="helix" evidence="56">
    <location>
        <begin position="903"/>
        <end position="910"/>
    </location>
</feature>
<feature type="turn" evidence="56">
    <location>
        <begin position="911"/>
        <end position="913"/>
    </location>
</feature>
<feature type="helix" evidence="56">
    <location>
        <begin position="914"/>
        <end position="917"/>
    </location>
</feature>
<feature type="helix" evidence="56">
    <location>
        <begin position="921"/>
        <end position="934"/>
    </location>
</feature>
<feature type="helix" evidence="56">
    <location>
        <begin position="935"/>
        <end position="937"/>
    </location>
</feature>
<feature type="helix" evidence="56">
    <location>
        <begin position="949"/>
        <end position="961"/>
    </location>
</feature>
<feature type="helix" evidence="56">
    <location>
        <begin position="996"/>
        <end position="1014"/>
    </location>
</feature>
<feature type="helix" evidence="56">
    <location>
        <begin position="1019"/>
        <end position="1035"/>
    </location>
</feature>
<feature type="turn" evidence="56">
    <location>
        <begin position="1038"/>
        <end position="1040"/>
    </location>
</feature>
<feature type="turn" evidence="56">
    <location>
        <begin position="1042"/>
        <end position="1045"/>
    </location>
</feature>
<feature type="helix" evidence="56">
    <location>
        <begin position="1065"/>
        <end position="1074"/>
    </location>
</feature>
<feature type="strand" evidence="56">
    <location>
        <begin position="1076"/>
        <end position="1078"/>
    </location>
</feature>
<feature type="helix" evidence="56">
    <location>
        <begin position="1079"/>
        <end position="1081"/>
    </location>
</feature>
<feature type="helix" evidence="56">
    <location>
        <begin position="1083"/>
        <end position="1098"/>
    </location>
</feature>
<feature type="helix" evidence="56">
    <location>
        <begin position="1101"/>
        <end position="1103"/>
    </location>
</feature>
<feature type="helix" evidence="56">
    <location>
        <begin position="1135"/>
        <end position="1156"/>
    </location>
</feature>
<feature type="helix" evidence="56">
    <location>
        <begin position="1234"/>
        <end position="1250"/>
    </location>
</feature>
<feature type="helix" evidence="56">
    <location>
        <begin position="1262"/>
        <end position="1277"/>
    </location>
</feature>
<feature type="helix" evidence="56">
    <location>
        <begin position="1278"/>
        <end position="1280"/>
    </location>
</feature>
<feature type="helix" evidence="56">
    <location>
        <begin position="1283"/>
        <end position="1286"/>
    </location>
</feature>
<feature type="turn" evidence="56">
    <location>
        <begin position="1287"/>
        <end position="1289"/>
    </location>
</feature>
<feature type="helix" evidence="56">
    <location>
        <begin position="1290"/>
        <end position="1300"/>
    </location>
</feature>
<feature type="turn" evidence="56">
    <location>
        <begin position="1301"/>
        <end position="1303"/>
    </location>
</feature>
<feature type="helix" evidence="56">
    <location>
        <begin position="1305"/>
        <end position="1319"/>
    </location>
</feature>
<feature type="turn" evidence="56">
    <location>
        <begin position="1324"/>
        <end position="1326"/>
    </location>
</feature>
<feature type="turn" evidence="56">
    <location>
        <begin position="1356"/>
        <end position="1359"/>
    </location>
</feature>
<feature type="helix" evidence="56">
    <location>
        <begin position="1360"/>
        <end position="1372"/>
    </location>
</feature>
<feature type="helix" evidence="56">
    <location>
        <begin position="1422"/>
        <end position="1425"/>
    </location>
</feature>
<feature type="helix" evidence="56">
    <location>
        <begin position="1426"/>
        <end position="1438"/>
    </location>
</feature>
<feature type="helix" evidence="56">
    <location>
        <begin position="1442"/>
        <end position="1457"/>
    </location>
</feature>
<feature type="helix" evidence="56">
    <location>
        <begin position="1462"/>
        <end position="1465"/>
    </location>
</feature>
<feature type="strand" evidence="56">
    <location>
        <begin position="1467"/>
        <end position="1469"/>
    </location>
</feature>
<feature type="helix" evidence="56">
    <location>
        <begin position="1470"/>
        <end position="1484"/>
    </location>
</feature>
<feature type="turn" evidence="56">
    <location>
        <begin position="1491"/>
        <end position="1493"/>
    </location>
</feature>
<feature type="helix" evidence="56">
    <location>
        <begin position="1494"/>
        <end position="1506"/>
    </location>
</feature>
<feature type="strand" evidence="56">
    <location>
        <begin position="1508"/>
        <end position="1515"/>
    </location>
</feature>
<feature type="helix" evidence="56">
    <location>
        <begin position="1517"/>
        <end position="1529"/>
    </location>
</feature>
<feature type="strand" evidence="56">
    <location>
        <begin position="1530"/>
        <end position="1532"/>
    </location>
</feature>
<feature type="turn" evidence="56">
    <location>
        <begin position="1534"/>
        <end position="1537"/>
    </location>
</feature>
<feature type="helix" evidence="56">
    <location>
        <begin position="1538"/>
        <end position="1550"/>
    </location>
</feature>
<feature type="helix" evidence="56">
    <location>
        <begin position="1563"/>
        <end position="1577"/>
    </location>
</feature>
<feature type="turn" evidence="56">
    <location>
        <begin position="1578"/>
        <end position="1580"/>
    </location>
</feature>
<feature type="helix" evidence="56">
    <location>
        <begin position="1582"/>
        <end position="1598"/>
    </location>
</feature>
<feature type="helix" evidence="56">
    <location>
        <begin position="1602"/>
        <end position="1620"/>
    </location>
</feature>
<feature type="helix" evidence="56">
    <location>
        <begin position="1628"/>
        <end position="1640"/>
    </location>
</feature>
<feature type="helix" evidence="56">
    <location>
        <begin position="1643"/>
        <end position="1646"/>
    </location>
</feature>
<feature type="helix" evidence="56">
    <location>
        <begin position="1650"/>
        <end position="1656"/>
    </location>
</feature>
<feature type="strand" evidence="56">
    <location>
        <begin position="1663"/>
        <end position="1665"/>
    </location>
</feature>
<feature type="helix" evidence="56">
    <location>
        <begin position="1666"/>
        <end position="1686"/>
    </location>
</feature>
<feature type="helix" evidence="56">
    <location>
        <begin position="1689"/>
        <end position="1698"/>
    </location>
</feature>
<feature type="helix" evidence="56">
    <location>
        <begin position="1703"/>
        <end position="1706"/>
    </location>
</feature>
<feature type="helix" evidence="56">
    <location>
        <begin position="1708"/>
        <end position="1715"/>
    </location>
</feature>
<feature type="helix" evidence="56">
    <location>
        <begin position="1736"/>
        <end position="1756"/>
    </location>
</feature>
<feature type="turn" evidence="56">
    <location>
        <begin position="1760"/>
        <end position="1763"/>
    </location>
</feature>
<feature type="helix" evidence="56">
    <location>
        <begin position="1766"/>
        <end position="1788"/>
    </location>
</feature>
<feature type="strand" evidence="56">
    <location>
        <begin position="1789"/>
        <end position="1791"/>
    </location>
</feature>
<feature type="helix" evidence="56">
    <location>
        <begin position="1793"/>
        <end position="1803"/>
    </location>
</feature>
<feature type="strand" evidence="56">
    <location>
        <begin position="1808"/>
        <end position="1812"/>
    </location>
</feature>
<feature type="helix" evidence="56">
    <location>
        <begin position="1815"/>
        <end position="1823"/>
    </location>
</feature>
<feature type="turn" evidence="56">
    <location>
        <begin position="1824"/>
        <end position="1828"/>
    </location>
</feature>
<feature type="helix" evidence="56">
    <location>
        <begin position="1830"/>
        <end position="1842"/>
    </location>
</feature>
<feature type="turn" evidence="56">
    <location>
        <begin position="1848"/>
        <end position="1850"/>
    </location>
</feature>
<feature type="helix" evidence="56">
    <location>
        <begin position="1851"/>
        <end position="1854"/>
    </location>
</feature>
<feature type="helix" evidence="56">
    <location>
        <begin position="1889"/>
        <end position="1908"/>
    </location>
</feature>
<feature type="helix" evidence="56">
    <location>
        <begin position="1914"/>
        <end position="1929"/>
    </location>
</feature>
<feature type="turn" evidence="56">
    <location>
        <begin position="1930"/>
        <end position="1932"/>
    </location>
</feature>
<feature type="helix" evidence="56">
    <location>
        <begin position="1934"/>
        <end position="1944"/>
    </location>
</feature>
<feature type="helix" evidence="56">
    <location>
        <begin position="1947"/>
        <end position="1958"/>
    </location>
</feature>
<feature type="turn" evidence="56">
    <location>
        <begin position="1959"/>
        <end position="1965"/>
    </location>
</feature>
<feature type="helix" evidence="56">
    <location>
        <begin position="1967"/>
        <end position="1978"/>
    </location>
</feature>
<feature type="helix" evidence="56">
    <location>
        <begin position="1982"/>
        <end position="1984"/>
    </location>
</feature>
<feature type="helix" evidence="56">
    <location>
        <begin position="1987"/>
        <end position="1994"/>
    </location>
</feature>
<feature type="helix" evidence="56">
    <location>
        <begin position="2002"/>
        <end position="2021"/>
    </location>
</feature>
<feature type="helix" evidence="56">
    <location>
        <begin position="2024"/>
        <end position="2030"/>
    </location>
</feature>
<feature type="helix" evidence="56">
    <location>
        <begin position="2033"/>
        <end position="2045"/>
    </location>
</feature>
<feature type="helix" evidence="56">
    <location>
        <begin position="2048"/>
        <end position="2051"/>
    </location>
</feature>
<feature type="helix" evidence="56">
    <location>
        <begin position="2053"/>
        <end position="2066"/>
    </location>
</feature>
<feature type="helix" evidence="56">
    <location>
        <begin position="2097"/>
        <end position="2108"/>
    </location>
</feature>
<feature type="strand" evidence="58">
    <location>
        <begin position="2109"/>
        <end position="2111"/>
    </location>
</feature>
<feature type="helix" evidence="56">
    <location>
        <begin position="2116"/>
        <end position="2123"/>
    </location>
</feature>
<feature type="helix" evidence="56">
    <location>
        <begin position="2128"/>
        <end position="2130"/>
    </location>
</feature>
<feature type="turn" evidence="56">
    <location>
        <begin position="2131"/>
        <end position="2136"/>
    </location>
</feature>
<feature type="helix" evidence="56">
    <location>
        <begin position="2142"/>
        <end position="2144"/>
    </location>
</feature>
<feature type="helix" evidence="56">
    <location>
        <begin position="2145"/>
        <end position="2156"/>
    </location>
</feature>
<feature type="turn" evidence="56">
    <location>
        <begin position="2157"/>
        <end position="2159"/>
    </location>
</feature>
<feature type="helix" evidence="56">
    <location>
        <begin position="2163"/>
        <end position="2181"/>
    </location>
</feature>
<feature type="strand" evidence="57">
    <location>
        <begin position="2192"/>
        <end position="2194"/>
    </location>
</feature>
<feature type="strand" evidence="58">
    <location>
        <begin position="2197"/>
        <end position="2199"/>
    </location>
</feature>
<feature type="helix" evidence="56">
    <location>
        <begin position="2201"/>
        <end position="2208"/>
    </location>
</feature>
<feature type="helix" evidence="56">
    <location>
        <begin position="2215"/>
        <end position="2217"/>
    </location>
</feature>
<feature type="helix" evidence="56">
    <location>
        <begin position="2218"/>
        <end position="2229"/>
    </location>
</feature>
<feature type="helix" evidence="56">
    <location>
        <begin position="2232"/>
        <end position="2234"/>
    </location>
</feature>
<feature type="helix" evidence="56">
    <location>
        <begin position="2237"/>
        <end position="2239"/>
    </location>
</feature>
<feature type="helix" evidence="56">
    <location>
        <begin position="2245"/>
        <end position="2266"/>
    </location>
</feature>
<feature type="strand" evidence="56">
    <location>
        <begin position="2267"/>
        <end position="2269"/>
    </location>
</feature>
<feature type="helix" evidence="56">
    <location>
        <begin position="2272"/>
        <end position="2285"/>
    </location>
</feature>
<feature type="helix" evidence="56">
    <location>
        <begin position="2289"/>
        <end position="2295"/>
    </location>
</feature>
<feature type="helix" evidence="58">
    <location>
        <begin position="2298"/>
        <end position="2300"/>
    </location>
</feature>
<feature type="helix" evidence="56">
    <location>
        <begin position="2301"/>
        <end position="2319"/>
    </location>
</feature>
<feature type="helix" evidence="56">
    <location>
        <begin position="2354"/>
        <end position="2368"/>
    </location>
</feature>
<feature type="turn" evidence="56">
    <location>
        <begin position="2369"/>
        <end position="2374"/>
    </location>
</feature>
<feature type="helix" evidence="56">
    <location>
        <begin position="2379"/>
        <end position="2381"/>
    </location>
</feature>
<feature type="strand" evidence="56">
    <location>
        <begin position="2386"/>
        <end position="2388"/>
    </location>
</feature>
<feature type="helix" evidence="56">
    <location>
        <begin position="2389"/>
        <end position="2400"/>
    </location>
</feature>
<feature type="helix" evidence="56">
    <location>
        <begin position="2403"/>
        <end position="2409"/>
    </location>
</feature>
<feature type="helix" evidence="56">
    <location>
        <begin position="2413"/>
        <end position="2417"/>
    </location>
</feature>
<feature type="strand" evidence="56">
    <location>
        <begin position="2426"/>
        <end position="2429"/>
    </location>
</feature>
<feature type="helix" evidence="56">
    <location>
        <begin position="2437"/>
        <end position="2439"/>
    </location>
</feature>
<feature type="helix" evidence="56">
    <location>
        <begin position="2443"/>
        <end position="2456"/>
    </location>
</feature>
<feature type="helix" evidence="56">
    <location>
        <begin position="2461"/>
        <end position="2475"/>
    </location>
</feature>
<feature type="helix" evidence="56">
    <location>
        <begin position="2498"/>
        <end position="2512"/>
    </location>
</feature>
<feature type="strand" evidence="56">
    <location>
        <begin position="2516"/>
        <end position="2518"/>
    </location>
</feature>
<feature type="turn" evidence="56">
    <location>
        <begin position="2522"/>
        <end position="2524"/>
    </location>
</feature>
<feature type="strand" evidence="56">
    <location>
        <begin position="2537"/>
        <end position="2542"/>
    </location>
</feature>
<feature type="helix" evidence="56">
    <location>
        <begin position="2543"/>
        <end position="2562"/>
    </location>
</feature>
<feature type="helix" evidence="56">
    <location>
        <begin position="2594"/>
        <end position="2596"/>
    </location>
</feature>
<feature type="turn" evidence="56">
    <location>
        <begin position="2598"/>
        <end position="2600"/>
    </location>
</feature>
<feature type="helix" evidence="56">
    <location>
        <begin position="2619"/>
        <end position="2625"/>
    </location>
</feature>
<feature type="strand" evidence="56">
    <location>
        <begin position="2663"/>
        <end position="2666"/>
    </location>
</feature>
<feature type="helix" evidence="56">
    <location>
        <begin position="2668"/>
        <end position="2680"/>
    </location>
</feature>
<feature type="helix" evidence="56">
    <location>
        <begin position="2694"/>
        <end position="2707"/>
    </location>
</feature>
<feature type="turn" evidence="56">
    <location>
        <begin position="2708"/>
        <end position="2710"/>
    </location>
</feature>
<feature type="helix" evidence="56">
    <location>
        <begin position="2714"/>
        <end position="2730"/>
    </location>
</feature>
<feature type="strand" evidence="56">
    <location>
        <begin position="2736"/>
        <end position="2738"/>
    </location>
</feature>
<feature type="helix" evidence="56">
    <location>
        <begin position="2739"/>
        <end position="2752"/>
    </location>
</feature>
<feature type="strand" evidence="56">
    <location>
        <begin position="2757"/>
        <end position="2760"/>
    </location>
</feature>
<feature type="helix" evidence="56">
    <location>
        <begin position="2763"/>
        <end position="2771"/>
    </location>
</feature>
<feature type="helix" evidence="56">
    <location>
        <begin position="2776"/>
        <end position="2790"/>
    </location>
</feature>
<feature type="strand" evidence="58">
    <location>
        <begin position="2791"/>
        <end position="2793"/>
    </location>
</feature>
<feature type="helix" evidence="58">
    <location>
        <begin position="2797"/>
        <end position="2801"/>
    </location>
</feature>
<feature type="helix" evidence="56">
    <location>
        <begin position="2802"/>
        <end position="2816"/>
    </location>
</feature>
<feature type="strand" evidence="56">
    <location>
        <begin position="2821"/>
        <end position="2824"/>
    </location>
</feature>
<feature type="helix" evidence="56">
    <location>
        <begin position="2826"/>
        <end position="2842"/>
    </location>
</feature>
<feature type="turn" evidence="56">
    <location>
        <begin position="2844"/>
        <end position="2846"/>
    </location>
</feature>
<feature type="turn" evidence="56">
    <location>
        <begin position="2851"/>
        <end position="2853"/>
    </location>
</feature>
<feature type="helix" evidence="56">
    <location>
        <begin position="2854"/>
        <end position="2863"/>
    </location>
</feature>
<feature type="turn" evidence="56">
    <location>
        <begin position="2867"/>
        <end position="2869"/>
    </location>
</feature>
<feature type="helix" evidence="56">
    <location>
        <begin position="2872"/>
        <end position="2887"/>
    </location>
</feature>
<feature type="turn" evidence="57">
    <location>
        <begin position="2893"/>
        <end position="2895"/>
    </location>
</feature>
<feature type="helix" evidence="56">
    <location>
        <begin position="2897"/>
        <end position="2900"/>
    </location>
</feature>
<feature type="turn" evidence="56">
    <location>
        <begin position="2904"/>
        <end position="2906"/>
    </location>
</feature>
<feature type="helix" evidence="56">
    <location>
        <begin position="2912"/>
        <end position="2928"/>
    </location>
</feature>
<feature type="helix" evidence="56">
    <location>
        <begin position="2952"/>
        <end position="2967"/>
    </location>
</feature>
<feature type="helix" evidence="56">
    <location>
        <begin position="2970"/>
        <end position="2987"/>
    </location>
</feature>
<feature type="helix" evidence="56">
    <location>
        <begin position="2990"/>
        <end position="2992"/>
    </location>
</feature>
<feature type="helix" evidence="56">
    <location>
        <begin position="2994"/>
        <end position="3001"/>
    </location>
</feature>
<feature type="strand" evidence="58">
    <location>
        <begin position="3002"/>
        <end position="3005"/>
    </location>
</feature>
<feature type="helix" evidence="56">
    <location>
        <begin position="3009"/>
        <end position="3023"/>
    </location>
</feature>
<feature type="turn" evidence="56">
    <location>
        <begin position="3024"/>
        <end position="3027"/>
    </location>
</feature>
<feature type="helix" evidence="56">
    <location>
        <begin position="3031"/>
        <end position="3037"/>
    </location>
</feature>
<feature type="strand" evidence="56">
    <location>
        <begin position="3040"/>
        <end position="3042"/>
    </location>
</feature>
<feature type="helix" evidence="56">
    <location>
        <begin position="3049"/>
        <end position="3062"/>
    </location>
</feature>
<feature type="turn" evidence="56">
    <location>
        <begin position="3067"/>
        <end position="3069"/>
    </location>
</feature>
<feature type="helix" evidence="56">
    <location>
        <begin position="3070"/>
        <end position="3072"/>
    </location>
</feature>
<feature type="helix" evidence="56">
    <location>
        <begin position="3073"/>
        <end position="3077"/>
    </location>
</feature>
<feature type="helix" evidence="56">
    <location>
        <begin position="3085"/>
        <end position="3100"/>
    </location>
</feature>
<feature type="turn" evidence="56">
    <location>
        <begin position="3101"/>
        <end position="3103"/>
    </location>
</feature>
<feature type="helix" evidence="56">
    <location>
        <begin position="3106"/>
        <end position="3116"/>
    </location>
</feature>
<feature type="helix" evidence="56">
    <location>
        <begin position="3117"/>
        <end position="3119"/>
    </location>
</feature>
<feature type="turn" evidence="56">
    <location>
        <begin position="3122"/>
        <end position="3126"/>
    </location>
</feature>
<feature type="helix" evidence="56">
    <location>
        <begin position="3127"/>
        <end position="3135"/>
    </location>
</feature>